<reference key="1">
    <citation type="journal article" date="1995" name="Science">
        <title>Titins, giant proteins in charge of muscle ultrastructure and elasticity.</title>
        <authorList>
            <person name="Labeit S."/>
            <person name="Kolmerer B."/>
        </authorList>
    </citation>
    <scope>NUCLEOTIDE SEQUENCE [MRNA] (ISOFORM 3)</scope>
    <scope>NUCLEOTIDE SEQUENCE [MRNA] OF 3336-12202 (ISOFORM 4)</scope>
    <scope>VARIANTS ILE-498; GLU-1201; MET-3261; ASN-3419; SER-3491; GLU-12679; ILE-19762; ILE-20718; ASN-23807; MET-24980 AND THR-27755</scope>
    <source>
        <tissue>Skeletal muscle</tissue>
    </source>
</reference>
<reference key="2">
    <citation type="journal article" date="2000" name="Circ. Res.">
        <title>Series of exon-skipping events in the elastic spring region of titin as the structural basis for myofibrillar elastic diversity.</title>
        <authorList>
            <person name="Freiburg A."/>
            <person name="Trombitas K."/>
            <person name="Hell W."/>
            <person name="Cazorla O."/>
            <person name="Fougerousse F."/>
            <person name="Centner T."/>
            <person name="Kolmerer B."/>
            <person name="Witt C."/>
            <person name="Beckmann J.S."/>
            <person name="Gregorio C.C."/>
            <person name="Granzier H."/>
            <person name="Labeit S."/>
        </authorList>
    </citation>
    <scope>NUCLEOTIDE SEQUENCE [GENOMIC DNA]</scope>
    <scope>ALTERNATIVE SPLICING</scope>
    <scope>VARIANTS LEU-1295; GLN-1572; ILE-2610; ASN-2831; SER-3491; PRO-4215; PHE-4283 AND ARG-12383</scope>
</reference>
<reference key="3">
    <citation type="journal article" date="2001" name="Circ. Res.">
        <title>The complete gene sequence of titin, expression of an unusual ~700 kDa titin isoform and its interaction with obscurin identify a novel Z-line to I-band linking system.</title>
        <authorList>
            <person name="Bang M.-L."/>
            <person name="Centner T."/>
            <person name="Fornoff F."/>
            <person name="Geach A.J."/>
            <person name="Gotthardt M."/>
            <person name="McNabb M."/>
            <person name="Witt C.C."/>
            <person name="Labeit D."/>
            <person name="Gregorio C.C."/>
            <person name="Granzier H."/>
            <person name="Labeit S."/>
        </authorList>
    </citation>
    <scope>NUCLEOTIDE SEQUENCE [GENOMIC DNA]</scope>
    <scope>ALTERNATIVE SPLICING</scope>
    <scope>TISSUE SPECIFICITY</scope>
    <scope>INTERACTION WITH OBSCN</scope>
    <scope>VARIANTS LEU-1295; GLN-1572; ILE-2610; ASN-2831; SER-3491; PRO-4215 AND PHE-4283</scope>
</reference>
<reference key="4">
    <citation type="journal article" date="2005" name="Nature">
        <title>Generation and annotation of the DNA sequences of human chromosomes 2 and 4.</title>
        <authorList>
            <person name="Hillier L.W."/>
            <person name="Graves T.A."/>
            <person name="Fulton R.S."/>
            <person name="Fulton L.A."/>
            <person name="Pepin K.H."/>
            <person name="Minx P."/>
            <person name="Wagner-McPherson C."/>
            <person name="Layman D."/>
            <person name="Wylie K."/>
            <person name="Sekhon M."/>
            <person name="Becker M.C."/>
            <person name="Fewell G.A."/>
            <person name="Delehaunty K.D."/>
            <person name="Miner T.L."/>
            <person name="Nash W.E."/>
            <person name="Kremitzki C."/>
            <person name="Oddy L."/>
            <person name="Du H."/>
            <person name="Sun H."/>
            <person name="Bradshaw-Cordum H."/>
            <person name="Ali J."/>
            <person name="Carter J."/>
            <person name="Cordes M."/>
            <person name="Harris A."/>
            <person name="Isak A."/>
            <person name="van Brunt A."/>
            <person name="Nguyen C."/>
            <person name="Du F."/>
            <person name="Courtney L."/>
            <person name="Kalicki J."/>
            <person name="Ozersky P."/>
            <person name="Abbott S."/>
            <person name="Armstrong J."/>
            <person name="Belter E.A."/>
            <person name="Caruso L."/>
            <person name="Cedroni M."/>
            <person name="Cotton M."/>
            <person name="Davidson T."/>
            <person name="Desai A."/>
            <person name="Elliott G."/>
            <person name="Erb T."/>
            <person name="Fronick C."/>
            <person name="Gaige T."/>
            <person name="Haakenson W."/>
            <person name="Haglund K."/>
            <person name="Holmes A."/>
            <person name="Harkins R."/>
            <person name="Kim K."/>
            <person name="Kruchowski S.S."/>
            <person name="Strong C.M."/>
            <person name="Grewal N."/>
            <person name="Goyea E."/>
            <person name="Hou S."/>
            <person name="Levy A."/>
            <person name="Martinka S."/>
            <person name="Mead K."/>
            <person name="McLellan M.D."/>
            <person name="Meyer R."/>
            <person name="Randall-Maher J."/>
            <person name="Tomlinson C."/>
            <person name="Dauphin-Kohlberg S."/>
            <person name="Kozlowicz-Reilly A."/>
            <person name="Shah N."/>
            <person name="Swearengen-Shahid S."/>
            <person name="Snider J."/>
            <person name="Strong J.T."/>
            <person name="Thompson J."/>
            <person name="Yoakum M."/>
            <person name="Leonard S."/>
            <person name="Pearman C."/>
            <person name="Trani L."/>
            <person name="Radionenko M."/>
            <person name="Waligorski J.E."/>
            <person name="Wang C."/>
            <person name="Rock S.M."/>
            <person name="Tin-Wollam A.-M."/>
            <person name="Maupin R."/>
            <person name="Latreille P."/>
            <person name="Wendl M.C."/>
            <person name="Yang S.-P."/>
            <person name="Pohl C."/>
            <person name="Wallis J.W."/>
            <person name="Spieth J."/>
            <person name="Bieri T.A."/>
            <person name="Berkowicz N."/>
            <person name="Nelson J.O."/>
            <person name="Osborne J."/>
            <person name="Ding L."/>
            <person name="Meyer R."/>
            <person name="Sabo A."/>
            <person name="Shotland Y."/>
            <person name="Sinha P."/>
            <person name="Wohldmann P.E."/>
            <person name="Cook L.L."/>
            <person name="Hickenbotham M.T."/>
            <person name="Eldred J."/>
            <person name="Williams D."/>
            <person name="Jones T.A."/>
            <person name="She X."/>
            <person name="Ciccarelli F.D."/>
            <person name="Izaurralde E."/>
            <person name="Taylor J."/>
            <person name="Schmutz J."/>
            <person name="Myers R.M."/>
            <person name="Cox D.R."/>
            <person name="Huang X."/>
            <person name="McPherson J.D."/>
            <person name="Mardis E.R."/>
            <person name="Clifton S.W."/>
            <person name="Warren W.C."/>
            <person name="Chinwalla A.T."/>
            <person name="Eddy S.R."/>
            <person name="Marra M.A."/>
            <person name="Ovcharenko I."/>
            <person name="Furey T.S."/>
            <person name="Miller W."/>
            <person name="Eichler E.E."/>
            <person name="Bork P."/>
            <person name="Suyama M."/>
            <person name="Torrents D."/>
            <person name="Waterston R.H."/>
            <person name="Wilson R.K."/>
        </authorList>
    </citation>
    <scope>NUCLEOTIDE SEQUENCE [LARGE SCALE GENOMIC DNA]</scope>
</reference>
<reference key="5">
    <citation type="journal article" date="2004" name="Genome Res.">
        <title>The status, quality, and expansion of the NIH full-length cDNA project: the Mammalian Gene Collection (MGC).</title>
        <authorList>
            <consortium name="The MGC Project Team"/>
        </authorList>
    </citation>
    <scope>NUCLEOTIDE SEQUENCE [LARGE SCALE MRNA] OF 1-626 AND 34071-34350 (ISOFORM 3)</scope>
    <source>
        <tissue>Muscle</tissue>
        <tissue>Skeletal muscle</tissue>
    </source>
</reference>
<reference key="6">
    <citation type="journal article" date="1996" name="J. Cell Sci.">
        <title>The central Z-disk region of titin is assembled from a novel repeat in variable copy numbers.</title>
        <authorList>
            <person name="Gautel M."/>
            <person name="Goulding D."/>
            <person name="Bullard B."/>
            <person name="Weber K."/>
            <person name="Furst D.O."/>
        </authorList>
    </citation>
    <scope>NUCLEOTIDE SEQUENCE [MRNA] OF 405-709 (ISOFORMS 1 AND 2)</scope>
    <source>
        <tissue>Heart muscle</tissue>
    </source>
</reference>
<reference key="7">
    <citation type="journal article" date="1995" name="Biochemistry">
        <title>Dissecting titin into its structural motifs: identification of an alpha helix near the N-terminus.</title>
        <authorList>
            <person name="Musco G."/>
            <person name="Tziatzos C."/>
            <person name="Schuck P."/>
            <person name="Pastore A."/>
        </authorList>
    </citation>
    <scope>NUCLEOTIDE SEQUENCE [MRNA] OF 2023-2060</scope>
    <scope>TISSUE SPECIFICITY</scope>
    <source>
        <tissue>Heart muscle</tissue>
    </source>
</reference>
<reference key="8">
    <citation type="journal article" date="1999" name="Circulation">
        <title>Familial dilated cardiomyopathy locus maps to chromosome 2q31.</title>
        <authorList>
            <person name="Siu B.L."/>
            <person name="Niimura H."/>
            <person name="Osborne J.A."/>
            <person name="Fatkin D."/>
            <person name="MacRae C."/>
            <person name="Solomon S."/>
            <person name="Benson D.W."/>
            <person name="Seidman J.G."/>
            <person name="Seidman C.E."/>
        </authorList>
    </citation>
    <scope>NUCLEOTIDE SEQUENCE [GENOMIC DNA] OF 3455-4473</scope>
    <scope>VARIANTS PRO-4215 AND PHE-4283</scope>
</reference>
<reference key="9">
    <citation type="journal article" date="2002" name="J. Muscle Res. Cell Motil.">
        <title>Species variations in cDNA sequence and exon splicing patterns in the extensible I-band region of cardiac titin: relation to passive tension.</title>
        <authorList>
            <person name="Greaser M.L."/>
            <person name="Berri M."/>
            <person name="Warren C.M."/>
            <person name="Mozdziak P.E."/>
        </authorList>
    </citation>
    <scope>NUCLEOTIDE SEQUENCE [MRNA] OF 9806-12017 (ISOFORM 5)</scope>
    <source>
        <tissue>Heart ventricle</tissue>
    </source>
</reference>
<reference key="10">
    <citation type="submission" date="2008-12" db="UniProtKB">
        <authorList>
            <person name="Lubec G."/>
            <person name="Chen W.-Q."/>
            <person name="Sun Y."/>
        </authorList>
    </citation>
    <scope>PROTEIN SEQUENCE OF 11773-11783; 17908-17931; 18656-18669; 26545-26553; 28758-28774 AND 32920-32928</scope>
    <scope>IDENTIFICATION BY MASS SPECTROMETRY</scope>
    <source>
        <tissue>Fetal brain cortex</tissue>
    </source>
</reference>
<reference key="11">
    <citation type="submission" date="2005-10" db="EMBL/GenBank/DDBJ databases">
        <title>Serological identification of rhabdomyosarcoma antigens.</title>
        <authorList>
            <person name="Behrends U."/>
            <person name="Gotz C."/>
            <person name="Mautner J."/>
        </authorList>
    </citation>
    <scope>NUCLEOTIDE SEQUENCE [MRNA] OF 12947-13797</scope>
    <source>
        <tissue>Embryonic rhabdomyosarcoma</tissue>
    </source>
</reference>
<reference key="12">
    <citation type="journal article" date="1993" name="Neurology">
        <title>Titin antibodies in myasthenia gravis: identification of a major immunogenic region of titin.</title>
        <authorList>
            <person name="Gautel M."/>
            <person name="Lakey A."/>
            <person name="Barlow D.P."/>
            <person name="Holmes Z."/>
            <person name="Scales S."/>
            <person name="Leonard K."/>
            <person name="Labeit S."/>
            <person name="Mygland A."/>
            <person name="Gilhus N.E."/>
            <person name="Aarli J.A."/>
        </authorList>
    </citation>
    <scope>NUCLEOTIDE SEQUENCE OF 14257-14543</scope>
</reference>
<reference key="13">
    <citation type="journal article" date="1992" name="EMBO J.">
        <title>Towards a molecular understanding of titin.</title>
        <authorList>
            <person name="Labeit S."/>
            <person name="Gautel M."/>
            <person name="Lakey A."/>
            <person name="Trinick J."/>
        </authorList>
    </citation>
    <scope>NUCLEOTIDE SEQUENCE [MRNA] OF 21021-22120</scope>
    <scope>NUCLEOTIDE SEQUENCE [GENOMIC DNA] OF 23754-24284</scope>
</reference>
<reference key="14">
    <citation type="journal article" date="1993" name="EMBO J.">
        <title>Phosphorylation of KSF motifs in the C-terminal region of titin in differentiating myoblasts.</title>
        <authorList>
            <person name="Gautel M."/>
            <person name="Leonard K."/>
            <person name="Labeit S."/>
        </authorList>
    </citation>
    <scope>NUCLEOTIDE SEQUENCE [MRNA] OF 29701-34350</scope>
    <scope>PHOSPHORYLATION</scope>
</reference>
<reference key="15">
    <citation type="journal article" date="2007" name="BMC Genomics">
        <title>The full-ORF clone resource of the German cDNA consortium.</title>
        <authorList>
            <person name="Bechtel S."/>
            <person name="Rosenfelder H."/>
            <person name="Duda A."/>
            <person name="Schmidt C.P."/>
            <person name="Ernst U."/>
            <person name="Wellenreuther R."/>
            <person name="Mehrle A."/>
            <person name="Schuster C."/>
            <person name="Bahr A."/>
            <person name="Bloecker H."/>
            <person name="Heubner D."/>
            <person name="Hoerlein A."/>
            <person name="Michel G."/>
            <person name="Wedler H."/>
            <person name="Koehrer K."/>
            <person name="Ottenwaelder B."/>
            <person name="Poustka A."/>
            <person name="Wiemann S."/>
            <person name="Schupp I."/>
        </authorList>
    </citation>
    <scope>NUCLEOTIDE SEQUENCE [LARGE SCALE MRNA] OF 33119-34350</scope>
    <source>
        <tissue>Skeletal muscle</tissue>
    </source>
</reference>
<reference key="16">
    <citation type="journal article" date="1998" name="FEBS Lett.">
        <title>Two immunoglobulin-like domains of the Z-disc portion of titin interact in a conformation-dependent way with telethonin.</title>
        <authorList>
            <person name="Mues A."/>
            <person name="van der Ven P.F.M."/>
            <person name="Young P."/>
            <person name="Furst D.O."/>
            <person name="Gautel M."/>
        </authorList>
    </citation>
    <scope>INTERACTION WITH TCAP</scope>
</reference>
<reference key="17">
    <citation type="journal article" date="2002" name="FEBS Lett.">
        <title>Interaction of nebulin SH3 domain with titin PEVK and myopalladin: implications for the signaling and assembly role of titin and nebulin.</title>
        <authorList>
            <person name="Ma K."/>
            <person name="Wang K."/>
        </authorList>
    </citation>
    <scope>INTERACTION WITH NEB</scope>
</reference>
<reference key="18">
    <citation type="journal article" date="2002" name="J. Cell Sci.">
        <title>Subcellular targeting of metabolic enzymes to titin in heart muscle may be mediated by DRAL/FHL-2.</title>
        <authorList>
            <person name="Lange S."/>
            <person name="Auerbach D."/>
            <person name="McLoughlin P."/>
            <person name="Perriard E."/>
            <person name="Schafer B.W."/>
            <person name="Perriard J.-C."/>
            <person name="Ehler E."/>
        </authorList>
    </citation>
    <scope>INTERACTION WITH FHL2</scope>
</reference>
<reference key="19">
    <citation type="journal article" date="2003" name="J. Biol. Chem.">
        <title>The hydrophilic domain of small ankyrin-1 interacts with the two N-terminal immunoglobulin domains of titin.</title>
        <authorList>
            <person name="Kontrogianni-Konstantopoulos A."/>
            <person name="Bloch R.J."/>
        </authorList>
    </citation>
    <scope>INTERACTION WITH ANK1</scope>
</reference>
<reference key="20">
    <citation type="journal article" date="2003" name="J. Mol. Biol.">
        <title>The muscle ankyrin repeat proteins: CARP, ankrd2/Arpp and DARP as a family of titin filament-based stress response molecules.</title>
        <authorList>
            <person name="Miller M.K."/>
            <person name="Bang M.-L."/>
            <person name="Witt C.C."/>
            <person name="Labeit D."/>
            <person name="Trombitas C."/>
            <person name="Watanabe K."/>
            <person name="Granzier H."/>
            <person name="McElhinny A.S."/>
            <person name="Gregorio C.C."/>
            <person name="Labeit S."/>
        </authorList>
    </citation>
    <scope>INTERACTION WITH ANKRD1; ANKRD2; ANKRD23 AND CAPN3</scope>
</reference>
<reference key="21">
    <citation type="journal article" date="2004" name="J. Biol. Chem.">
        <title>Association of the chaperone alphaB-crystallin with titin in heart muscle.</title>
        <authorList>
            <person name="Bullard B."/>
            <person name="Ferguson C."/>
            <person name="Minajeva A."/>
            <person name="Leake M.C."/>
            <person name="Gautel M."/>
            <person name="Labeit D."/>
            <person name="Ding L."/>
            <person name="Labeit S."/>
            <person name="Horwitz J."/>
            <person name="Leonard K.R."/>
            <person name="Linke W.A."/>
        </authorList>
    </citation>
    <scope>INTERACTION WITH CRYAB</scope>
</reference>
<reference key="22">
    <citation type="journal article" date="2005" name="J. Mol. Biol.">
        <title>MURF-1 and MURF-2 target a specific subset of myofibrillar proteins redundantly: towards understanding MURF-dependent muscle ubiquitination.</title>
        <authorList>
            <person name="Witt S.H."/>
            <person name="Granzier H."/>
            <person name="Witt C.C."/>
            <person name="Labeit S."/>
        </authorList>
    </citation>
    <scope>INTERACTION WITH TRIM63 AND TRIM55</scope>
</reference>
<reference key="23">
    <citation type="journal article" date="2006" name="J. Cell Sci.">
        <title>Nuclear titin interacts with A- and B-type lamins in vitro and in vivo.</title>
        <authorList>
            <person name="Zastrow M.S."/>
            <person name="Flaherty D.B."/>
            <person name="Benian G.M."/>
            <person name="Wilson K.L."/>
        </authorList>
    </citation>
    <scope>INTERACTION WITH LAMIN</scope>
    <scope>SUBCELLULAR LOCATION</scope>
</reference>
<reference key="24">
    <citation type="journal article" date="2006" name="Am. J. Physiol.">
        <title>Mechanical stress-strain sensors embedded in cardiac cytoskeleton: Z disk, titin, and associated structures.</title>
        <authorList>
            <person name="Hoshijima M."/>
        </authorList>
    </citation>
    <scope>REVIEW</scope>
</reference>
<reference key="25">
    <citation type="journal article" date="2010" name="J. Biol. Chem.">
        <title>Interactions with M-band titin and calpain 3 link myospryn (CMYA5) to tibial and limb-girdle muscular dystrophies.</title>
        <authorList>
            <person name="Sarparanta J."/>
            <person name="Blandin G."/>
            <person name="Charton K."/>
            <person name="Vihola A."/>
            <person name="Marchand S."/>
            <person name="Milic A."/>
            <person name="Hackman P."/>
            <person name="Ehler E."/>
            <person name="Richard I."/>
            <person name="Udd B."/>
        </authorList>
    </citation>
    <scope>INTERACTION WITH CMYA5</scope>
</reference>
<reference key="26">
    <citation type="journal article" date="1995" name="Structure">
        <title>Tertiary structure of an immunoglobulin-like domain from the giant muscle protein titin: a new member of the I set.</title>
        <authorList>
            <person name="Pfuhl M."/>
            <person name="Pastore A."/>
        </authorList>
    </citation>
    <scope>STRUCTURE BY NMR OF 33483-33579</scope>
</reference>
<reference key="27">
    <citation type="journal article" date="1998" name="Nature">
        <title>Structural basis for activation of the titin kinase domain during myofibrillogenesis.</title>
        <authorList>
            <person name="Mayans O."/>
            <person name="van der Ven P.F.M."/>
            <person name="Wilm M."/>
            <person name="Mues A."/>
            <person name="Young P."/>
            <person name="Furst D.O."/>
            <person name="Wilmanns M."/>
            <person name="Gautel M."/>
        </authorList>
    </citation>
    <scope>X-RAY CRYSTALLOGRAPHY (2.0 ANGSTROMS) OF 32172-32489</scope>
    <scope>FUNCTION</scope>
    <scope>ACTIVITY REGULATION</scope>
    <scope>INTERACTION WITH CALM</scope>
    <scope>PHOSPHORYLATION AT TYR-32341</scope>
    <scope>MUTAGENESIS OF LYS-32207 AND TYR-32341</scope>
</reference>
<reference key="28">
    <citation type="journal article" date="1998" name="Structure">
        <title>The three-dimensional structure of a type I module from titin: a prototype of intracellular fibronectin type III domains.</title>
        <authorList>
            <person name="Goll C.M."/>
            <person name="Pastore A."/>
            <person name="Nilges M."/>
        </authorList>
    </citation>
    <scope>STRUCTURE BY NMR OF 22283-22385</scope>
</reference>
<reference key="29">
    <citation type="journal article" date="2001" name="Structure">
        <title>Structural evidence for a possible role of reversible disulphide bridge formation in the elasticity of the muscle protein titin.</title>
        <authorList>
            <person name="Mayans O."/>
            <person name="Wuerges J."/>
            <person name="Canela S."/>
            <person name="Gautel M."/>
            <person name="Wilmanns M."/>
        </authorList>
    </citation>
    <scope>X-RAY CRYSTALLOGRAPHY (2.1 ANGSTROMS) OF 2073-2171</scope>
    <scope>DISULFIDE BOND</scope>
</reference>
<reference key="30">
    <citation type="journal article" date="2006" name="Nature">
        <title>Palindromic assembly of the giant muscle protein titin in the sarcomeric Z-disk.</title>
        <authorList>
            <person name="Zou P."/>
            <person name="Pinotsis N."/>
            <person name="Lange S."/>
            <person name="Song Y.-H."/>
            <person name="Popov A."/>
            <person name="Mavridis I."/>
            <person name="Mayans O.M."/>
            <person name="Gautel M."/>
            <person name="Wilmanns M."/>
        </authorList>
    </citation>
    <scope>X-RAY CRYSTALLOGRAPHY (2.44 ANGSTROMS) OF 1-196 IN COMPLEX WITH TCAP</scope>
</reference>
<reference key="31">
    <citation type="journal article" date="1999" name="Biochem. Biophys. Res. Commun.">
        <title>Structural analysis of the titin gene in hypertrophic cardiomyopathy: identification of a novel disease gene.</title>
        <authorList>
            <person name="Satoh M."/>
            <person name="Takahashi M."/>
            <person name="Sakamoto T."/>
            <person name="Hiroe M."/>
            <person name="Marumo F."/>
            <person name="Kimura A."/>
        </authorList>
    </citation>
    <scope>VARIANT CMH9 LEU-740</scope>
</reference>
<reference key="32">
    <citation type="journal article" date="2002" name="Am. J. Hum. Genet.">
        <title>Tibial muscular dystrophy is a titinopathy caused by mutations in TTN, the gene encoding the giant skeletal-muscle protein titin.</title>
        <authorList>
            <person name="Hackman P."/>
            <person name="Vihola A."/>
            <person name="Haravuori H."/>
            <person name="Marchand S."/>
            <person name="Sarparanta J."/>
            <person name="De Seze J."/>
            <person name="Labeit S."/>
            <person name="Witt C."/>
            <person name="Peltonen L."/>
            <person name="Richard I."/>
            <person name="Udd B."/>
        </authorList>
    </citation>
    <scope>INVOLVEMENT IN LGMDR10</scope>
    <scope>VARIANT TMD PRO-34315</scope>
</reference>
<reference key="33">
    <citation type="journal article" date="2002" name="Biochem. Biophys. Res. Commun.">
        <title>Titin mutations as the molecular basis for dilated cardiomyopathy.</title>
        <authorList>
            <person name="Itoh-Satoh M."/>
            <person name="Hayashi T."/>
            <person name="Nishi H."/>
            <person name="Koga Y."/>
            <person name="Arimura T."/>
            <person name="Koyanagi T."/>
            <person name="Takahashi M."/>
            <person name="Hohda S."/>
            <person name="Ueda K."/>
            <person name="Nouchi T."/>
            <person name="Hiroe M."/>
            <person name="Marumo F."/>
            <person name="Imaizumi T."/>
            <person name="Yasunami M."/>
            <person name="Kimura A."/>
        </authorList>
    </citation>
    <scope>VARIANTS CMD1G MET-54; VAL-743; TYR-3799 AND ASN-4465</scope>
    <scope>VARIANTS CYS-328; GLN-4084 AND PRO-4215</scope>
    <scope>CHARACTERIZATION OF VARIANTS CMD1G MET-54 AND VAL-743</scope>
    <scope>FUNCTION</scope>
</reference>
<reference key="34">
    <citation type="journal article" date="2002" name="Nat. Genet.">
        <title>Mutations of TTN, encoding the giant muscle filament titin, cause familial dilated cardiomyopathy.</title>
        <authorList>
            <person name="Gerull B."/>
            <person name="Gramlich M."/>
            <person name="Atherton J."/>
            <person name="McNabb M."/>
            <person name="Trombitas K."/>
            <person name="Sasse-Klaassen S."/>
            <person name="Seidman J.G."/>
            <person name="Seidman C."/>
            <person name="Granzier H."/>
            <person name="Labeit S."/>
            <person name="Frenneaux M."/>
            <person name="Thierfelder L."/>
        </authorList>
    </citation>
    <scope>VARIANT CMD1G ARG-976</scope>
</reference>
<reference key="35">
    <citation type="journal article" date="2003" name="Ann. Neurol.">
        <title>Tibial muscular dystrophy in a Belgian family.</title>
        <authorList>
            <person name="Van den Bergh P.Y.K."/>
            <person name="Bouquiaux O."/>
            <person name="Verellen C."/>
            <person name="Marchand S."/>
            <person name="Richard I."/>
            <person name="Hackman P."/>
            <person name="Udd B."/>
        </authorList>
    </citation>
    <scope>VARIANT TMD ASN-34306</scope>
</reference>
<reference key="36">
    <citation type="journal article" date="2005" name="J. Muscle Res. Cell Motil.">
        <title>Functional analysis of titin/connectin N2-B mutations found in cardiomyopathy.</title>
        <authorList>
            <person name="Matsumoto Y."/>
            <person name="Hayashi T."/>
            <person name="Inagaki N."/>
            <person name="Takahashi M."/>
            <person name="Hiroi S."/>
            <person name="Nakamura T."/>
            <person name="Arimura T."/>
            <person name="Nakamura K."/>
            <person name="Ashizawa N."/>
            <person name="Yasunami M."/>
            <person name="Ohe T."/>
            <person name="Yano K."/>
            <person name="Kimura A."/>
        </authorList>
    </citation>
    <scope>VARIANT CMD1G GLN-32996</scope>
</reference>
<reference key="37">
    <citation type="journal article" date="2005" name="Science">
        <title>The kinase domain of titin controls muscle gene expression and protein turnover.</title>
        <authorList>
            <person name="Lange S."/>
            <person name="Xiang F."/>
            <person name="Yakovenko A."/>
            <person name="Vihola A."/>
            <person name="Hackman P."/>
            <person name="Rostkova E."/>
            <person name="Kristensen J."/>
            <person name="Brandmeier B."/>
            <person name="Franzen G."/>
            <person name="Hedberg B."/>
            <person name="Gunnarsson L.G."/>
            <person name="Hughes S.M."/>
            <person name="Marchand S."/>
            <person name="Sejersen T."/>
            <person name="Richard I."/>
            <person name="Edstroem L."/>
            <person name="Ehler E."/>
            <person name="Udd B."/>
            <person name="Gautel M."/>
        </authorList>
    </citation>
    <scope>VARIANT MFM9 TRP-279</scope>
    <scope>CHARACTERIZATION OF VARIANT MFM9 TRP-279</scope>
    <scope>INTERACTION WITH NBR1</scope>
</reference>
<reference key="38">
    <citation type="journal article" date="2007" name="Ann. Neurol.">
        <title>C-terminal titin deletions cause a novel early-onset myopathy with fatal cardiomyopathy.</title>
        <authorList>
            <person name="Carmignac V."/>
            <person name="Salih M.A.M."/>
            <person name="Quijano-Roy S."/>
            <person name="Marchand S."/>
            <person name="Al Rayess M.M."/>
            <person name="Mukhtar M.M."/>
            <person name="Urtizberea J.A."/>
            <person name="Labeit S."/>
            <person name="Guicheney P."/>
            <person name="Leturcq F."/>
            <person name="Gautel M."/>
            <person name="Fardeau M."/>
            <person name="Campbell K.P."/>
            <person name="Richard I."/>
            <person name="Estournet B."/>
            <person name="Ferreiro A."/>
        </authorList>
    </citation>
    <scope>INVOLVEMENT IN CMYO5</scope>
</reference>
<reference key="39">
    <citation type="journal article" date="2007" name="Nature">
        <title>Patterns of somatic mutation in human cancer genomes.</title>
        <authorList>
            <person name="Greenman C."/>
            <person name="Stephens P."/>
            <person name="Smith R."/>
            <person name="Dalgliesh G.L."/>
            <person name="Hunter C."/>
            <person name="Bignell G."/>
            <person name="Davies H."/>
            <person name="Teague J."/>
            <person name="Butler A."/>
            <person name="Stevens C."/>
            <person name="Edkins S."/>
            <person name="O'Meara S."/>
            <person name="Vastrik I."/>
            <person name="Schmidt E.E."/>
            <person name="Avis T."/>
            <person name="Barthorpe S."/>
            <person name="Bhamra G."/>
            <person name="Buck G."/>
            <person name="Choudhury B."/>
            <person name="Clements J."/>
            <person name="Cole J."/>
            <person name="Dicks E."/>
            <person name="Forbes S."/>
            <person name="Gray K."/>
            <person name="Halliday K."/>
            <person name="Harrison R."/>
            <person name="Hills K."/>
            <person name="Hinton J."/>
            <person name="Jenkinson A."/>
            <person name="Jones D."/>
            <person name="Menzies A."/>
            <person name="Mironenko T."/>
            <person name="Perry J."/>
            <person name="Raine K."/>
            <person name="Richardson D."/>
            <person name="Shepherd R."/>
            <person name="Small A."/>
            <person name="Tofts C."/>
            <person name="Varian J."/>
            <person name="Webb T."/>
            <person name="West S."/>
            <person name="Widaa S."/>
            <person name="Yates A."/>
            <person name="Cahill D.P."/>
            <person name="Louis D.N."/>
            <person name="Goldstraw P."/>
            <person name="Nicholson A.G."/>
            <person name="Brasseur F."/>
            <person name="Looijenga L."/>
            <person name="Weber B.L."/>
            <person name="Chiew Y.-E."/>
            <person name="DeFazio A."/>
            <person name="Greaves M.F."/>
            <person name="Green A.R."/>
            <person name="Campbell P."/>
            <person name="Birney E."/>
            <person name="Easton D.F."/>
            <person name="Chenevix-Trench G."/>
            <person name="Tan M.-H."/>
            <person name="Khoo S.K."/>
            <person name="Teh B.T."/>
            <person name="Yuen S.T."/>
            <person name="Leung S.Y."/>
            <person name="Wooster R."/>
            <person name="Futreal P.A."/>
            <person name="Stratton M.R."/>
        </authorList>
    </citation>
    <scope>VARIANTS [LARGE SCALE ANALYSIS] TYR-60; MET-115; CYS-328; THR-360; ILE-498; MET-799; ILE-811; HIS-922; ASP-937; THR-1081; ARG-1137; GLU-1201; ALA-1202; LEU-1295; ASP-1345; THR-1347; HIS-1350; LEU-1353; VAL-1393; CYS-1416; PRO-1441; VAL-1544; GLN-1572; GLY-1658; GLN-1664; ASP-1692; LEU-1744; GLY-1772; ILE-1907; HIS-1998; LEU-2107; THR-2118; THR-2164; TYR-2240; SER-2392; PHE-2432; ILE-2610; MET-2771; PHE-2823; ASN-2831; ILE-2930; ARG-3154; GLU-3191; LEU-3238; GLY-3250; MET-3261; GLN-3367; LYS-3482; LYS-3570; VAL-3590; VAL-3762; PHE-3877; LEU-3965; PRO-4215; TRP-4238; PHE-4283; THR-4291; ASP-4303; GLU-4427; GLU-12310; ALA-12469; CYS-12642; LYS-12657; GLU-12679; PHE-12720; CYS-12798; GLY-13049; LYS-13083; LEU-13096; ARG-13099; ALA-13297; MET-13399; THR-13418; VAL-13428; THR-13430; LYS-13434; ASN-13469; ASN-13495; SER-13785; HIS-13870; ILE-14109; GLN-14131; THR-14208; VAL-14728; THR-14999; THR-15021; VAL-15520; ILE-15555; GLN-15620; ILE-15629; CYS-15635; GLN-15700; PRO-15705; MET-15837; HIS-16058; ILE-16067; THR-16090; HIS-16195; CYS-16409; PRO-16424; MET-16629; ARG-16877; ASP-17060; VAL-17637; HIS-17838; ASN-17866; GLU-17906; ALA-18094; SER-18109; THR-18164; LEU-18221; THR-18222; GLN-18726; ALA-18835; LYS-18881; SER-18939; GLN-19000; GLN-19060; LYS-19091; SER-19224; ILE-19367; LYS-19392; SER-19480; GLY-19495; HIS-19665; ILE-19762; ARG-19947; MET-19956; GLN-19992; CYS-20057; LEU-20075; LYS-20179; THR-20198; VAL-20198; HIS-20331; THR-20408; LYS-20564; ILE-20718; PRO-20726; ASN-20892; ARG-20894; GLU-21125; SER-21403; CYS-21730; GLN-21747; ARG-21851; ARG-21851; ARG-21925; HIS-21995; VAL-22045; HIS-22149; ILE-22160; THR-22261; ASN-22306; HIS-22357; PRO-22408; HIS-22537; LEU-22584; PRO-22646; ALA-22670; ASP-22770; THR-22801; TRP-22823; GLN-22968; LEU-23074; PHE-23079; ASN-23282; TYR-23303; CYS-23306; SER-23515; GLN-23551; ASN-23807; ASN-23872; ALA-23891; HIS-23933; MET-23939; LEU-23952; GLY-24098; SER-24119; ILE-24133; ALA-24159; ALA-24239; LYS-24265; THR-24584; THR-24781; HIS-24799; HIS-24954; MET-24980; HIS-25659; THR-25679; ALA-25720; LYS-25821; LYS-25859; LYS-25879; VAL-25923; ILE-26045; GLU-26059; VAL-26134; CYS-26477; TYR-26843; ARG-27346; CYS-27652; VAL-27728; LEU-27754; THR-27755; VAL-27929; LEU-28132; GLN-28168; HIS-28538; THR-28572; THR-28948; VAL-28986; GLU-28993; VAL-28998; MET-29070; VAL-29090; CYS-29419; PRO-29479; LEU-29880; GLU-29976; GLY-30042; CYS-30107; PHE-30125; PRO-30211; THR-30412; SER-30617; ILE-30674; ILE-30809; ILE-30818; LYS-30825; THR-30856; ASP-30887; SER-30887; HIS-30897; HIS-30907; HIS-30946; PHE-31081; CYS-31107; GLY-31124; SER-31156; THR-31246; HIS-31330; ARG-31690; GLN-31724; ILE-31725; SER-31732; ILE-31886; CYS-32097; ASN-32171; ILE-32248; HIS-32281; HIS-32323; TRP-32411; VAL-32558; VAL-32610; VAL-32637; ALA-32922; ARG-32943; HIS-32953; LEU-33213; CYS-33242; MET-33387; ASP-33419; MET-33536; GLN-33568; LYS-33616; LEU-33620; VAL-33886; THR-33899; PRO-33904; ILE-33955 AND ALA-34115</scope>
</reference>
<reference key="40">
    <citation type="journal article" date="2012" name="N. Engl. J. Med.">
        <title>Diagnostic exome sequencing in persons with severe intellectual disability.</title>
        <authorList>
            <person name="de Ligt J."/>
            <person name="Willemsen M.H."/>
            <person name="van Bon B.W."/>
            <person name="Kleefstra T."/>
            <person name="Yntema H.G."/>
            <person name="Kroes T."/>
            <person name="Vulto-van Silfhout A.T."/>
            <person name="Koolen D.A."/>
            <person name="de Vries P."/>
            <person name="Gilissen C."/>
            <person name="del Rosario M."/>
            <person name="Hoischen A."/>
            <person name="Scheffer H."/>
            <person name="de Vries B.B."/>
            <person name="Brunner H.G."/>
            <person name="Veltman J.A."/>
            <person name="Vissers L.E."/>
        </authorList>
    </citation>
    <scope>VARIANTS VAL-16046 AND GLN-32742</scope>
</reference>
<reference key="41">
    <citation type="journal article" date="2014" name="Circ. Cardiovasc. Genet.">
        <title>Novel alpha-actinin 2 variant associated with familial hypertrophic cardiomyopathy and juvenile atrial arrhythmias: a massively parallel sequencing study.</title>
        <authorList>
            <person name="Girolami F."/>
            <person name="Iascone M."/>
            <person name="Tomberli B."/>
            <person name="Bardi S."/>
            <person name="Benelli M."/>
            <person name="Marseglia G."/>
            <person name="Pescucci C."/>
            <person name="Pezzoli L."/>
            <person name="Sana M.E."/>
            <person name="Basso C."/>
            <person name="Marziliano N."/>
            <person name="Merlini P.A."/>
            <person name="Fornaro A."/>
            <person name="Cecchi F."/>
            <person name="Torricelli F."/>
            <person name="Olivotto I."/>
        </authorList>
    </citation>
    <scope>VARIANTS PRO-2963 AND GLN-14750</scope>
</reference>
<accession>Q8WZ42</accession>
<accession>A0A0A0MTS7</accession>
<accession>A6NKB1</accession>
<accession>C9JQJ2</accession>
<accession>E7EQE6</accession>
<accession>E7ET18</accession>
<accession>K7ENY1</accession>
<accession>Q10465</accession>
<accession>Q10466</accession>
<accession>Q15598</accession>
<accession>Q2XUS3</accession>
<accession>Q32Q60</accession>
<accession>Q4U1Z6</accession>
<accession>Q4ZG20</accession>
<accession>Q6NSG0</accession>
<accession>Q6PDB1</accession>
<accession>Q6PJP0</accession>
<accession>Q7KYM2</accession>
<accession>Q7KYN4</accession>
<accession>Q7KYN5</accession>
<accession>Q7LDM3</accession>
<accession>Q7Z2X3</accession>
<accession>Q8TCG8</accession>
<accession>Q8WZ51</accession>
<accession>Q8WZ52</accession>
<accession>Q8WZ53</accession>
<accession>Q8WZB3</accession>
<accession>Q92761</accession>
<accession>Q92762</accession>
<accession>Q9UD97</accession>
<accession>Q9UP84</accession>
<accession>Q9Y6L9</accession>
<sequence>MTTQAPTFTQPLQSVVVLEGSTATFEAHISGFPVPEVSWFRDGQVISTSTLPGVQISFSDGRAKLTIPAVTKANSGRYSLKATNGSGQATSTAELLVKAETAPPNFVQRLQSMTVRQGSQVRLQVRVTGIPTPVVKFYRDGAEIQSSLDFQISQEGDLYSLLIAEAYPEDSGTYSVNATNSVGRATSTAELLVQGEEEVPAKKTKTIVSTAQISESRQTRIEKKIEAHFDARSIATVEMVIDGAAGQQLPHKTPPRIPPKPKSRSPTPPSIAAKAQLARQQSPSPIRHSPSPVRHVRAPTPSPVRSVSPAARISTSPIRSVRSPLLMRKTQASTVATGPEVPPPWKQEGYVASSSEAEMRETTLTTSTQIRTEERWEGRYGVQEQVTISGAAGAAASVSASASYAAEAVATGAKEVKQDADKSAAVATVVAAVDMARVREPVISAVEQTAQRTTTTAVHIQPAQEQVRKEAEKTAVTKVVVAADKAKEQELKSRTKEVITTKQEQMHVTHEQIRKETEKTFVPKVVISAAKAKEQETRISEEITKKQKQVTQEAIRQETEITAASMVVVATAKSTKLETVPGAQEETTTQQDQMHLSYEKIMKETRKTVVPKVIVATPKVKEQDLVSRGREGITTKREQVQITQEKMRKEAEKTALSTIAVATAKAKEQETILRTRETMATRQEQIQVTHGKVDVGKKAEAVATVVAAVDQARVREPREPGHLEESYAQQTTLEYGYKERISAAKVAEPPQRPASEPHVVPKAVKPRVIQAPSETHIKTTDQKGMHISSQIKKTTDLTTERLVHVDKRPRTASPHFTVSKISVPKTEHGYEASIAGSAIATLQKELSATSSAQKITKSVKAPTVKPSETRVRAEPTPLPQFPFADTPDTYKSEAGVEVKKEVGVSITGTTVREERFEVLHGREAKVTETARVPAPVEIPVTPPTLVSGLKNVTVIEGESVTLECHISGYPSPTVTWYREDYQIESSIDFQITFQSGIARLMIREAFAEDSGRFTCSAVNEAGTVSTSCYLAVQVSEEFEKETTAVTEKFTTEEKRFVESRDVVMTDTSLTEEQAGPGEPAAPYFITKPVVQKLVEGGSVVFGCQVGGNPKPHVYWKKSGVPLTTGYRYKVSYNKQTGECKLVISMTFADDAGEYTIVVRNKHGETSASASLLEEADYELLMKSQQEMLYQTQVTAFVQEPKVGETAPGFVYSEYEKEYEKEQALIRKKMAKDTVVVRTYVEDQEFHISSFEERLIKEIEYRIIKTTLEELLEEDGEEKMAVDISESEAVESGFDSRIKNYRILEGMGVTFHCKMSGYPLPKIAWYKDGKRIKHGERYQMDFLQDGRASLRIPVVLPEDEGIYTAFASNIKGNAICSGKLYVEPAAPLGAPTYIPTLEPVSRIRSLSPRSVSRSPIRMSPARMSPARMSPARMSPARMSPGRRLEETDESQLERLYKPVFVLKPVSFKCLEGQTARFDLKVVGRPMPETFWFHDGQQIVNDYTHKVVIKEDGTQSLIIVPATPSDSGEWTVVAQNRAGRSSISVILTVEAVEHQVKPMFVEKLKNVNIKEGSRLEMKVRATGNPNPDIVWLKNSDIIVPHKYPKIRIEGTKGEAALKIDSTVSQDSAWYTATAINKAGRDTTRCKVNVEVEFAEPEPERKLIIPRGTYRAKEIAAPELEPLHLRYGQEQWEEGDLYDKEKQQKPFFKKKLTSLRLKRFGPAHFECRLTPIGDPTMVVEWLHDGKPLEAANRLRMINEFGYCSLDYGVAYSRDSGIITCRATNKYGTDHTSATLIVKDEKSLVEESQLPEGRKGLQRIEELERMAHEGALTGVTTDQKEKQKPDIVLYPEPVRVLEGETARFRCRVTGYPQPKVNWYLNGQLIRKSKRFRVRYDGIHYLDIVDCKSYDTGEVKVTAENPEGVIEHKVKLEIQQREDFRSVLRRAPEPRPEFHVHEPGKLQFEVQKVDRPVDTTETKEVVKLKRAERITHEKVPEESEELRSKFKRRTEEGYYEAITAVELKSRKKDESYEELLRKTKDELLHWTKELTEEEKKALAEEGKITIPTFKPDKIELSPSMEAPKIFERIQSQTVGQGSDAHFRVRVVGKPDPECEWYKNGVKIERSDRIYWYWPEDNVCELVIRDVTAEDSASIMVKAINIAGETSSHAFLLVQAKQLITFTQELQDVVAKEKDTMATFECETSEPFVKVKWYKDGMEVHEGDKYRMHSDRKVHFLSILTIDTSDAEDYSCVLVEDENVKTTAKLIVEGAVVEFVKELQDIEVPESYSGELECIVSPENIEGKWYHNDVELKSNGKYTITSRRGRQNLTVKDVTKEDQGEYSFVIDGKKTTCKLKMKPRPIAILQGLSDQKVCEGDIVQLEVKVSLESVEGVWMKDGQEVQPSDRVHIVIDKQSHMLLIEDMTKEDAGNYSFTIPALGLSTSGRVSVYSVDVITPLKDVNVIEGTKAVLECKVSVPDVTSVKWYLNDEQIKPDDRVQAIVKGTKQRLVINRTHASDEGPYKLIVGRVETNCNLSVEKIKIIRGLRDLTCTETQNVVFEVELSHSGIDVLWNFKDKEIKPSSKYKIEAHGKIYKLTVLNMMKDDEGKYTFYAGENMTSGKLTVAGGAISKPLTDQTVAESQEAVFECEVANPDSKGEWLRDGKHLPLTNNIRSESDGHKRRLIIAATKLDDIGEYTYKVATSKTSAKLKVEAVKIKKTLKNLTVTETQDAVFTVELTHPNVKGVQWIKNGVVLESNEKYAISVKGTIYSLRIKNCAIVDESVYGFRLGRLGASARLHVETVKIIKKPKDVTALENATVAFEVSVSHDTVPVKWFHKSVEIKPSDKHRLVSERKVHKLMLQNISPSDAGEYTAVVGQLECKAKLFVETLHITKTMKNIEVPETKTASFECEVSHFNVPSMWLKNGVEIEMSEKFKIVVQGKLHQLIIMNTSTEDSAEYTFVCGNDQVSATLTVTPIMITSMLKDINAEEKDTITFEVTVNYEGISYKWLKNGVEIKSTDKCQMRTKKLTHSLNIRNVHFGDAADYTFVAGKATSTATLYVEARHIEFRKHIKDIKVLEKKRAMFECEVSEPDITVQWMKDDQELQITDRIKIQKEKYVHRLLIPSTRMSDAGKYTVVAGGNVSTAKLFVEGRDVRIRSIKKEVQVIEKQRAVVEFEVNEDDVDAHWYKDGIEINFQVQERHKYVVERRIHRMFISETRQSDAGEYTFVAGRNRSSVTLYVNAPEPPQVLQELQPVTVQSGKPARFCAVISGRPQPKISWYKEEQLLSTGFKCKFLHDGQEYTLLLIEAFPEDAAVYTCEAKNDYGVATTSASLSVEVPEVVSPDQEMPVYPPAIITPLQDTVTSEGQPARFQCRVSGTDLKVSWYSKDKKIKPSRFFRMTQFEDTYQLEIAEAYPEDEGTYTFVASNAVGQVSSTANLSLEAPESILHERIEQEIEMEMKEFSSSFLSAEEEGLHSAELQLSKINETLELLSESPVYPTKFDSEKEGTGPIFIKEVSNADISMGDVATLSVTVIGIPKPKIQWFFNGVLLTPSADYKFVFDGDDHSLIILFTKLEDEGEYTCMASNDYGKTICSAYLKINSKGEGHKDTETESAVAKSLEKLGGPCPPHFLKELKPIRCAQGLPAIFEYTVVGEPAPTVTWFKENKQLCTSVYYTIIHNPNGSGTFIVNDPQREDSGLYICKAENMLGESTCAAELLVLLEDTDMTDTPCKAKSTPEAPEDFPQTPLKGPAVEALDSEQEIATFVKDTILKAALITEENQQLSYEHIAKANELSSQLPLGAQELQSILEQDKLTPESTREFLCINGSIHFQPLKEPSPNLQLQIVQSQKTFSKEGILMPEEPETQAVLSDTEKIFPSAMSIEQINSLTVEPLKTLLAEPEGNYPQSSIEPPMHSYLTSVAEEVLSPKEKTVSDTNREQRVTLQKQEAQSALILSQSLAEGHVESLQSPDVMISQVNYEPLVPSEHSCTEGGKILIESANPLENAGQDSAVRIEEGKSLRFPLALEEKQVLLKEEHSDNVVMPPDQIIESKREPVAIKKVQEVQGRDLLSKESLLSGIPEEQRLNLKIQICRALQAAVASEQPGLFSEWLRNIEKVEVEAVNITQEPRHIMCMYLVTSAKSVTEEVTIIIEDVDPQMANLKMELRDALCAIIYEEIDILTAEGPRIQQGAKTSLQEEMDSFSGSQKVEPITEPEVESKYLISTEEVSYFNVQSRVKYLDATPVTKGVASAVVSDEKQDESLKPSEEKEESSSESGTEEVATVKIQEAEGGLIKEDGPMIHTPLVDTVSEEGDIVHLTTSITNAKEVNWYFENKLVPSDEKFKCLQDQNTYTLVIDKVNTEDHQGEYVCEALNDSGKTATSAKLTVVKRAAPVIKRKIEPLEVALGHLAKFTCEIQSAPNVRFQWFKAGREIYESDKCSIRSSKYISSLEILRTQVVDCGEYTCKASNEYGSVSCTATLTVTEAYPPTFLSRPKSLTTFVGKAAKFICTVTGTPVIETIWQKDGAALSPSPNWRISDAENKHILELSNLTIQDRGVYSCKASNKFGADICQAELIIIDKPHFIKELEPVQSAINKKVHLECQVDEDRKVTVTWSKDGQKLPPGKDYKICFEDKIATLEIPLAKLKDSGTYVCTASNEAGSSSCSATVTVREPPSFVKKVDPSYLMLPGESARLHCKLKGSPVIQVTWFKNNKELSESNTVRMYFVNSEAILDITDVKVEDSGSYSCEAVNDVGSDSCSTEIVIKEPPSFIKTLEPADIVRGTNALLQCEVSGTGPFEISWFKDKKQIRSSKKYRLFSQKSLVCLEIFSFNSADVGEYECVVANEVGKCGCMATHLLKEPPTFVKKVDDLIALGGQTVTLQAAVRGSEPISVTWMKGQEVIREDGKIKMSFSNGVAVLIIPDVQISFGGKYTCLAENEAGSQTSVGELIVKEPAKIIERAELIQVTAGDPATLEYTVAGTPELKPKWYKDGRPLVASKKYRISFKNNVAQLKFYSAELHDSGQYTFEISNEVGSSSCETTFTVLDRDIAPFFTKPLRNVDSVVNGTCRLDCKIAGSLPMRVSWFKDGKEIAASDRYRIAFVEGTASLEIIRVDMNDAGNFTCRATNSVGSKDSSGALIVQEPPSFVTKPGSKDVLPGSAVCLKSTFQGSTPLTIRWFKGNKELVSGGSCYITKEALESSLELYLVKTSDSGTYTCKVSNVAGGVECSANLFVKEPATFVEKLEPSQLLKKGDATQLACKVTGTPPIKITWFANDREIKESSKHRMSFVESTAVLRLTDVGIEDSGEYMCEAQNEAGSDHCSSIVIVKESPYFTKEFKPIEVLKEYDVMLLAEVAGTPPFEITWFKDNTILRSGRKYKTFIQDHLVSLQILKFVAADAGEYQCRVTNEVGSSICSARVTLREPPSFIKKIESTSSLRGGTAAFQATLKGSLPITVTWLKDSDEITEDDNIRMTFENNVASLYLSGIEVKHDGKYVCQAKNDAGIQRCSALLSVKEPATITEEAVSIDVTQGDPATLQVKFSGTKEITAKWFKDGQELTLGSKYKISVTDTVSILKIISTEKKDSGEYTFEVQNDVGRSSCKARINVLDLIIPPSFTKKLKKMDSIKGSFIDLECIVAGSHPISIQWFKDDQEISASEKYKFSFHDNTAFLEISQLEGTDSGTYTCSATNKAGHNQCSGHLTVKEPPYFVEKPQSQDVNPNTRVQLKALVGGTAPMTIKWFKDNKELHSGAARSVWKDDTSTSLELFAAKATDSGTYICQLSNDVGTATSKATLFVKEPPQFIKKPSPVLVLRNGQSTTFECQITGTPKIRVSWYLDGNEITAIQKHGISFIDGLATFQISGARVENSGTYVCEARNDAGTASCSIELKVKEPPTFIRELKPVEVVKYSDVELECEVTGTPPFEVTWLKNNREIRSSKKYTLTDRVSVFNLHITKCDPSDTGEYQCIVSNEGGSCSCSTRVALKEPPSFIKKIENTTTVLKSSATFQSTVAGSPPISITWLKDDQILDEDDNVYISFVDSVATLQIRSVDNGHSGRYTCQAKNESGVERCYAFLLVQEPAQIVEKAKSVDVTEKDPMTLECVVAGTPELKVKWLKDGKQIVPSRYFSMSFENNVASFRIQSVMKQDSGQYTFKVENDFGSSSCDAYLRVLDQNIPPSFTKKLTKMDKVLGSSIHMECKVSGSLPISAQWFKDGKEISTSAKYRLVCHERSVSLEVNNLELEDTANYTCKVSNVAGDDACSGILTVKEPPSFLVKPGRQQAIPDSTVEFKAILKGTPPFKIKWFKDDVELVSGPKCFIGLEGSTSFLNLYSVDASKTGQYTCHVTNDVGSDSCTTMLLVTEPPKFVKKLEASKIVKAGDSSRLECKIAGSPEIRVVWFRNEHELPASDKYRMTFIDSVAVIQMNNLSTEDSGDFICEAQNPAGSTSCSTKVIVKEPPVFSSFPPIVETLKNAEVSLECELSGTPPFEVVWYKDKRQLRSSKKYKIASKNFHTSIHILNVDTSDIGEYHCKAQNEVGSDTCVCTVKLKEPPRFVSKLNSLTVVAGEPAELQASIEGAQPIFVQWLKEKEEVIRESENIRITFVENVATLQFAKAEPANAGKYICQIKNDGGMRENMATLMVLEPAVIVEKAGPMTVTVGETCTLECKVAGTPELSVEWYKDGKLLTSSQKHKFSFYNKISSLRILSVERQDAGTYTFQVQNNVGKSSCTAVVDVSDRAVPPSFTRRLKNTGGVLGASCILECKVAGSSPISVAWFHEKTKIVSGAKYQTTFSDNVCTLQLNSLDSSDMGNYTCVAANVAGSDECRAVLTVQEPPSFVKEPEPLEVLPGKNVTFTSVIRGTPPFKVNWFRGARELVKGDRCNIYFEDTVAELELFNIDISQSGEYTCVVSNNAGQASCTTRLFVKEPAAFLKRLSDHSVEPGKSIILESTYTGTLPISVTWKKDGFNITTSEKCNIVTTEKTCILEILNSTKRDAGQYSCEIENEAGRDVCGALVSTLEPPYFVTELEPLEAAVGDSVSLQCQVAGTPEITVSWYKGDTKLRPTPEYRTYFTNNVATLVFNKVNINDSGEYTCKAENSIGTASSKTVFRIQERQLPPSFARQLKDIEQTVGLPVTLTCRLNGSAPIQVCWYRDGVLLRDDENLQTSFVDNVATLKILQTDLSHSGQYSCSASNPLGTASSSARLTAREPKKSPFFDIKPVSIDVIAGESADFECHVTGAQPMRITWSKDNKEIRPGGNYTITCVGNTPHLRILKVGKGDSGQYTCQATNDVGKDMCSAQLSVKEPPKFVKKLEASKVAKQGESIQLECKISGSPEIKVSWFRNDSELHESWKYNMSFINSVALLTINEASAEDSGDYICEAHNGVGDASCSTALTVKAPPVFTQKPSPVGALKGSDVILQCEISGTPPFEVVWVKDRKQVRNSKKFKITSKHFDTSLHILNLEASDVGEYHCKATNEVGSDTCSCSVKFKEPPRFVKKLSDTSTLIGDAVELRAIVEGFQPISVVWLKDRGEVIRESENTRISFIDNIATLQLGSPEASNSGKYICQIKNDAGMRECSAVLTVLEPARIIEKPEPMTVTTGNPFALECVVTGTPELSAKWFKDGRELSADSKHHITFINKVASLKIPCAEMSDKGLYSFEVKNSVGKSNCTVSVHVSDRIVPPSFIRKLKDVNAILGASVVLECRVSGSAPISVGWFQDGNEIVSGPKCQSSFSENVCTLNLSLLEPSDTGIYTCVAANVAGSDECSAVLTVQEPPSFEQTPDSVEVLPGMSLTFTSVIRGTPPFKVKWFKGSRELVPGESCNISLEDFVTELELFEVQPLESGDYSCLVTNDAGSASCTTHLFVKEPATFVKRLADFSVETGSPIVLEATYTGTPPISVSWIKDEYLISQSERCSITMTEKSTILEILESTIEDYAQYSCLIENEAGQDICEALVSVLEPPYFIEPLEHVEAVIGEPATLQCKVDGTPEIRISWYKEHTKLRSAPAYKMQFKNNVASLVINKVDHSDVGEYSCKADNSVGAVASSAVLVIKARKLPPFFARKLKDVHETLGFPVAFECRINGSEPLQVSWYKDGVLLKDDANLQTSFVHNVATLQILQTDQSHIGQYNCSASNPLGTASSSAKLILSEHEVPPFFDLKPVSVDLALGESGTFKCHVTGTAPIKITWAKDNREIRPGGNYKMTLVENTATLTVLKVGKGDAGQYTCYASNIAGKDSCSAQLGVQEPPRFIKKLEPSRIVKQDEFTRYECKIGGSPEIKVLWYKDETEIQESSKFRMSFVDSVAVLEMHNLSVEDSGDYTCEAHNAAGSASSSTSLKVKEPPIFRKKPHPIETLKGADVHLECELQGTPPFHVSWYKDKRELRSGKKYKIMSENFLTSIHILNVDAADIGEYQCKATNDVGSDTCVGSIALKAPPRFVKKLSDISTVVGKEVQLQTTIEGAEPISVVWFKDKGEIVRESDNIWISYSENIATLQFSRVEPANAGKYTCQIKNDAGMQECFATLSVLEPATIVEKPESIKVTTGDTCTLECTVAGTPELSTKWFKDGKELTSDNKYKISFFNKVSGLKIINVAPSDSGVYSFEVQNPVGKDSCTASLQVSDRTVPPSFTRKLKETNGLSGSSVVMECKVYGSPPISVSWFHEGNEISSGRKYQTTLTDNTCALTVNMLEESDSGDYTCIATNMAGSDECSAPLTVREPPSFVQKPDPMDVLTGTNVTFTSIVKGTPPFSVSWFKGSSELVPGDRCNVSLEDSVAELELFDVDTSQSGEYTCIVSNEAGKASCTTHLYIKAPAKFVKRLNDYSIEKGKPLILEGTFTGTPPISVTWKKNGINVTPSQRCNITTTEKSAILEIPSSTVEDAGQYNCYIENASGKDSCSAQILILEPPYFVKQLEPVKVSVGDSASLQCQLAGTPEIGVSWYKGDTKLRPTTTYKMHFRNNVATLVFNQVDINDSGEYICKAENSVGEVSASTFLTVQEQKLPPSFSRQLRDVQETVGLPVVFDCAISGSEPISVSWYKDGKPLKDSPNVQTSFLDNTATLNIFKTDRSLAGQYSCTATNPIGSASSSARLILTEGKNPPFFDIRLAPVDAVVGESADFECHVTGTQPIKVSWAKDSREIRSGGKYQISYLENSAHLTVLKVDKGDSGQYTCYAVNEVGKDSCTAQLNIKERLIPPSFTKRLSETVEETEGNSFKLEGRVAGSQPITVAWYKNNIEIQPTSNCEITFKNNTLVLQVRKAGMNDAGLYTCKVSNDAGSALCTSSIVIKEPKKPPVFDQHLTPVTVSEGEYVQLSCHVQGSEPIRIQWLKAGREIKPSDRCSFSFASGTAVLELRDVAKADSGDYVCKASNVAGSDTTKSKVTIKDKPAVAPATKKAAVDGRLFFVSEPQSIRVVEKTTATFIAKVGGDPIPNVKWTKGKWRQLNQGGRVFIHQKGDEAKLEIRDTTKTDSGLYRCVAFNEHGEIESNVNLQVDERKKQEKIEGDLRAMLKKTPILKKGAGEEEEIDIMELLKNVDPKEYEKYARMYGITDFRGLLQAFELLKQSQEEETHRLEIEEIERSERDEKEFEELVSFIQQRLSQTEPVTLIKDIENQTVLKDNDAVFEIDIKINYPEIKLSWYKGTEKLEPSDKFEISIDGDRHTLRVKNCQLKDQGNYRLVCGPHIASAKLTVIEPAWERHLQDVTLKEGQTCTMTCQFSVPNVKSEWFRNGRILKPQGRHKTEVEHKVHKLTIADVRAEDQGQYTCKYEDLETSAELRIEAEPIQFTKRIQNIVVSEHQSATFECEVSFDDAIVTWYKGPTELTESQKYNFRNDGRCHYMTIHNVTPDDEGVYSVIARLEPRGEARSTAELYLTTKEIKLELKPPDIPDSRVPIPTMPIRAVPPEEIPPVVAPPIPLLLPTPEEKKPPPKRIEVTKKAVKKDAKKVVAKPKEMTPREEIVKKPPPPTTLIPAKAPEIIDVSSKAEEVKIMTITRKKEVQKEKEAVYEKKQAVHKEKRVFIESFEEPYDELEVEPYTEPFEQPYYEEPDEDYEEIKVEAKKEVHEEWEEDFEEGQEYYEREEGYDEGEEEWEEAYQEREVIQVQKEVYEESHERKVPAKVPEKKAPPPPKVIKKPVIEKIEKTSRRMEEEKVQVTKVPEVSKKIVPQKPSRTPVQEEVIEVKVPAVHTKKMVISEEKMFFASHTEEEVSVTVPEVQKEIVTEEKIHVAISKRVEPPPKVPELPEKPAPEEVAPVPIPKKVEPPAPKVPEVPKKPVPEEKKPVPVPKKEPAAPPKVPEVPKKPVPEEKIPVPVAKKKEAPPAKVPEVQKGVVTEEKITIVTQREESPPPAVPEIPKKKVPEERKPVPRKEEEVPPPPKVPALPKKPVPEEKVAVPVPVAKKAPPPRAEVSKKTVVEEKRFVAEEKLSFAVPQRVEVTRHEVSAEEEWSYSEEEEGVSISVYREEEREEEEEAEVTEYEVMEEPEEYVVEEKLHIISKRVEAEPAEVTERQEKKIVLKPKIPAKIEEPPPAKVPEAPKKIVPEKKVPAPVPKKEKVPPPKVPEEPKKPVPEKKVPPKVIKMEEPLPAKVTERHMQITQEEKVLVAVTKKEAPPKARVPEEPKRAVPEEKVLKLKPKREEEPPAKVTEFRKRVVKEEKVSIEAPKREPQPIKEVTIMEEKERAYTLEEEAVSVQREEEYEEYEEYDYKEFEEYEPTEEYDQYEEYEEREYERYEEHEEYITEPEKPIPVKPVPEEPVPTKPKAPPAKVLKKAVPEEKVPVPIPKKLKPPPPKVPEEPKKVFEEKIRISITKREKEQVTEPAAKVPMKPKRVVAEEKVPVPRKEVAPPVRVPEVPKELEPEEVAFEEEVVTHVEEYLVEEEEEYIHEEEEFITEEEVVPVIPVKVPEVPRKPVPEEKKPVPVPKKKEAPPAKVPEVPKKPEEKVPVLIPKKEKPPPAKVPEVPKKPVPEEKVPVPVPKKVEAPPAKVPEVPKKPVPEKKVPVPAPKKVEAPPAKVPEVPKKLIPEEKKPTPVPKKVEAPPPKVPKKREPVPVPVALPQEEEVLFEEEIVPEEEVLPEEEEVLPEEEEVLPEEEEVLPEEEEIPPEEEEVPPEEEYVPEEEEFVPEEEVLPEVKPKVPVPAPVPEIKKKVTEKKVVIPKKEEAPPAKVPEVPKKVEEKRIILPKEEEVLPVEVTEEPEEEPISEEEIPEEPPSIEEVEEVAPPRVPEVIKKAVPEAPTPVPKKVEAPPAKVSKKIPEEKVPVPVQKKEAPPAKVPEVPKKVPEKKVLVPKKEAVPPAKGRTVLEEKVSVAFRQEVVVKERLELEVVEAEVEEIPEEEEFHEVEEYFEEGEFHEVEEFIKLEQHRVEEEHRVEKVHRVIEVFEAEEVEVFEKPKAPPKGPEISEKIIPPKKPPTKVVPRKEPPAKVPEVPKKIVVEEKVRVPEEPRVPPTKVPEVLPPKEVVPEKKVPVPPAKKPEAPPPKVPEAPKEVVPEKKVPVPPPKKPEVPPTKVPEVPKAAVPEKKVPEAIPPKPESPPPEVPEAPKEVVPEKKVPAAPPKKPEVTPVKVPEAPKEVVPEKKVPVPPPKKPEVPPTKVPEVPKVAVPEKKVPEAIPPKPESPPPEVFEEPEEVALEEPPAEVVEEPEPAAPPQVTVPPKKPVPEKKAPAVVAKKPELPPVKVPEVPKEVVPEKKVPLVVPKKPEAPPAKVPEVPKEVVPEKKVAVPKKPEVPPAKVPEVPKKPVLEEKPAVPVPERAESPPPEVYEEPEEIAPEEEIAPEEEKPVPVAEEEEPEVPPPAVPEEPKKIIPEKKVPVIKKPEAPPPKEPEPEKVIEKPKLKPRPPPPPPAPPKEDVKEKIFQLKAIPKKKVPEKPQVPEKVELTPLKVPGGEKKVRKLLPERKPEPKEEVVLKSVLRKRPEEEEPKVEPKKLEKVKKPAVPEPPPPKPVEEVEVPTVTKRERKIPEPTKVPEIKPAIPLPAPEPKPKPEAEVKTIKPPPVEPEPTPIAAPVTVPVVGKKAEAKAPKEEAAKPKGPIKGVPKKTPSPIEAERRKLRPGSGGEKPPDEAPFTYQLKAVPLKFVKEIKDIILTESEFVGSSAIFECLVSPSTAITTWMKDGSNIRESPKHRFIADGKDRKLHIIDVQLSDAGEYTCVLRLGNKEKTSTAKLVVEELPVRFVKTLEEEVTVVKGQPLYLSCELNKERDVVWRKDGKIVVEKPGRIVPGVIGLMRALTINDADDTDAGTYTVTVENANNLECSSCVKVVEVIRDWLVKPIRDQHVKPKGTAIFACDIAKDTPNIKWFKGYDEIPAEPNDKTEILRDGNHLYLKIKNAMPEDIAEYAVEIEGKRYPAKLTLGEREVELLKPIEDVTIYEKESASFDAEISEADIPGQWKLKGELLRPSPTCEIKAEGGKRFLTLHKVKLDQAGEVLYQALNAITTAILTVKEIELDFAVPLKDVTVPERRQARFECVLTREANVIWSKGPDIIKSSDKFDIIADGKKHILVINDSQFDDEGVYTAEVEGKKTSARLFVTGIRLKFMSPLEDQTVKEGETATFVCELSHEKMHVVWFKNDAKLHTSRTVLISSEGKTHKLEMKEVTLDDISQIKAQVKELSSTAQLKVLEADPYFTVKLHDKTAVEKDEITLKCEVSKDVPVKWFKDGEEIVPSPKYSIKADGLRRILKIKKADLKDKGEYVCDCGTDKTKANVTVEARLIKVEKPLYGVEVFVGETAHFEIELSEPDVHGQWKLKGQPLTASPDCEIIEDGKKHILILHNCQLGMTGEVSFQAANAKSAANLKVKELPLIFITPLSDVKVFEKDEAKFECEVSREPKTFRWLKGTQEITGDDRFELIKDGTKHSMVIKSAAFEDEAKYMFEAEDKHTSGKLIIEGIRLKFLTPLKDVTAKEKESAVFTVELSHDNIRVKWFKNDQRLHTTRSVSMQDEGKTHSITFKDLSIDDTSQIRVEAMGMSSEAKLTVLEGDPYFTGKLQDYTGVEKDEVILQCEISKADAPVKWFKDGKEIKPSKNAVIKADGKKRMLILKKALKSDIGQYTCDCGTDKTSGKLDIEDREIKLVRPLHSVEVMETETARFETEISEDDIHANWKLKGEALLQTPDCEIKEEGKIHSLVLHNCRLDQTGGVDFQAANVKSSAHLRVKPRVIGLLRPLKDVTVTAGETATFDCELSYEDIPVEWYLKGKKLEPSDKVVPRSEGKVHTLTLRDVKLEDAGEVQLTAKDFKTHANLFVKEPPVEFTKPLEDQTVEEGATAVLECEVSRENAKVKWFKNGTEILKSKKYEIVADGRVRKLVIHDCTPEDIKTYTCDAKDFKTSCNLNVVPPHVEFLRPLTDLQVREKEMARFECELSRENAKVKWFKDGAEIKKGKKYDIISKGAVRILVINKCLLDDEAEYSCEVRTARTSGMLTVLEEEAVFTKNLANIEVSETDTIKLVCEVSKPGAEVIWYKGDEEIIETGRYEILTEGRKRILVIQNAHLEDAGNYNCRLPSSRTDGKVKVHELAAEFISKPQNLEILEGEKAEFVCSISKESFPVQWKRDDKTLESGDKYDVIADGKKRVLVVKDATLQDMGTYVVMVGAARAAAHLTVIEKLRIVVPLKDTRVKEQQEVVFNCEVNTEGAKAKWFRNEEAIFDSSKYIILQKDLVYTLRIRDAHLDDQANYNVSLTNHRGENVKSAANLIVEEEDLRIVEPLKDIETMEKKSVTFWCKVNRLNVTLKWTKNGEEVPFDNRVSYRVDKYKHMLTIKDCGFPDEGEYIVTAGQDKSVAELLIIEAPTEFVEHLEDQTVTEFDDAVFSCQLSREKANVKWYRNGREIKEGKKYKFEKDGSIHRLIIKDCRLDDECEYACGVEDRKSRARLFVEEIPVEIIRPPQDILEAPGADVVFLAELNKDKVEVQWLRNNMVVVQGDKHQMMSEGKIHRLQICDIKPRDQGEYRFIAKDKEARAKLELAAAPKIKTADQDLVVDVGKPLTMVVPYDAYPKAEAEWFKENEPLSTKTIDTTAEQTSFRILEAKKGDKGRYKIVLQNKHGKAEGFINLKVIDVPGPVRNLEVTETFDGEVSLAWEEPLTDGGSKIIGYVVERRDIKRKTWVLATDRAESCEFTVTGLQKGGVEYLFRVSARNRVGTGEPVETDNPVEARSKYDVPGPPLNVTITDVNRFGVSLTWEPPEYDGGAEITNYVIELRDKTSIRWDTAMTVRAEDLSATVTDVVEGQEYSFRVRAQNRIGVGKPSAATPFVKVADPIERPSPPVNLTSSDQTQSSVQLKWEPPLKDGGSPILGYIIERCEEGKDNWIRCNMKLVPELTYKVTGLEKGNKYLYRVSAENKAGVSDPSEILGPLTADDAFVEPTMDLSAFKDGLEVIVPNPITILVPSTGYPRPTATWCFGDKVLETGDRVKMKTLSAYAELVISPSERSDKGIYTLKLENRVKTISGEIDVNVIARPSAPKELKFGDITKDSVHLTWEPPDDDGGSPLTGYVVEKREVSRKTWTKVMDFVTDLEFTVPDLVQGKEYLFKVCARNKCGPGEPAYVDEPVNMSTPATVPDPPENVKWRDRTANSIFLTWDPPKNDGGSRIKGYIVERCPRGSDKWVACGEPVAETKMEVTGLEEGKWYAYRVKALNRQGASKPSRPTEEIQAVDTQEAPEIFLDVKLLAGLTVKAGTKIELPATVTGKPEPKITWTKADMILKQDKRITIENVPKKSTVTIVDSKRSDTGTYIIEAVNVCGRATAVVEVNVLDKPGPPAAFDITDVTNESCLLTWNPPRDDGGSKITNYVVERRATDSEVWHKLSSTVKDTNFKATKLIPNKEYIFRVAAENMYGVGEPVQASPITAKYQFDPPGPPTRLEPSDITKDAVTLTWCEPDDDGGSPITGYWVERLDPDTDKWVRCNKMPVKDTTYRVKGLTNKKKYRFRVLAENLAGPGKPSKSTEPILIKDPIDPPWPPGKPTVKDVGKTSVRLNWTKPEHDGGAKIESYVIEMLKTGTDEWVRVAEGVPTTQHLLPGLMEGQEYSFRVRAVNKAGESEPSEPSDPVLCREKLYPPSPPRWLEVINITKNTADLKWTVPEKDGGSPITNYIVEKRDVRRKGWQTVDTTVKDTKCTVTPLTEGSLYVFRVAAENAIGQSDYTEIEDSVLAKDTFTTPGPPYALAVVDVTKRHVDLKWEPPKNDGGRPIQRYVIEKKERLGTRWVKAGKTAGPDCNFRVTDVIEGTEVQFQVRAENEAGVGHPSEPTEILSIEDPTSPPSPPLDLHVTDAGRKHIAIAWKPPEKNGGSPIIGYHVEMCPVGTEKWMRVNSRPIKDLKFKVEEGVVPDKEYVLRVRAVNAIGVSEPSEISENVVAKDPDCKPTIDLETHDIIVIEGEKLSIPVPFRAVPVPTVSWHKDGKEVKASDRLTMKNDHISAHLEVPKSVRADAGIYTITLENKLGSATASINVKVIGLPGPCKDIKASDITKSSCKLTWEPPEFDGGTPILHYVLERREAGRRTYIPVMSGENKLSWTVKDLIPNGEYFFRVKAVNKVGGGEYIELKNPVIAQDPKQPPDPPVDVEVHNPTAEAMTITWKPPLYDGGSKIMGYIIEKIAKGEERWKRCNEHLVPILTYTAKGLEEGKEYQFRVRAENAAGISEPSRATPPTKAVDPIDAPKVILRTSLEVKRGDEIALDASISGSPYPTITWIKDENVIVPEEIKKRAAPLVRRRKGEVQEEEPFVLPLTQRLSIDNSKKGESQLRVRDSLRPDHGLYMIKVENDHGIAKAPCTVSVLDTPGPPINFVFEDIRKTSVLCKWEPPLDDGGSEIINYTLEKKDKTKPDSEWIVVTSTLRHCKYSVTKLIEGKEYLFRVRAENRFGPGPPCVSKPLVAKDPFGPPDAPDKPIVEDVTSNSMLVKWNEPKDNGSPILGYWLEKREVNSTHWSRVNKSLLNALKANVDGLLEGLTYVFRVCAENAAGPGKFSPPSDPKTAHDPISPPGPPIPRVTDTSSTTIELEWEPPAFNGGGEIVGYFVDKQLVGTNEWSRCTEKMIKVRQYTVKEIREGADYKLRVSAVNAAGEGPPGETQPVTVAEPQEPPAVELDVSVKGGIQIMAGKTLRIPAVVTGRPVPTKVWTKEEGELDKDRVVIDNVGTKSELIIKDALRKDHGRYVITATNSCGSKFAAARVEVFDVPGPVLDLKPVVTNRKMCLLNWSDPEDDGGSEITGFIIERKDAKMHTWRQPIETERSKCDITGLLEGQEYKFRVIAKNKFGCGPPVEIGPILAVDPLGPPTSPERLTYTERTKSTITLDWKEPRSNGGSPIQGYIIEKRRHDKPDFERVNKRLCPTTSFLVENLDEHQMYEFRVKAVNEIGESEPSLPLNVVIQDDEVPPTIKLRLSVRGDTIKVKAGEPVHIPADVTGLPMPKIEWSKNETVIEKPTDALQITKEEVSRSEAKTELSIPKAVREDKGTYTVTASNRLGSVFRNVHVEVYDRPSPPRNLAVTDIKAESCYLTWDAPLDNGGSEITHYVIDKRDASRKKAEWEEVTNTAVEKRYGIWKLIPNGQYEFRVRAVNKYGISDECKSDKVVIQDPYRLPGPPGKPKVLARTKGSMLVSWTPPLDNGGSPITGYWLEKREEGSPYWSRVSRAPITKVGLKGVEFNVPRLLEGVKYQFRAMAINAAGIGPPSEPSDPEVAGDPIFPPGPPSCPEVKDKTKSSISLGWKPPAKDGGSPIKGYIVEMQEEGTTDWKRVNEPDKLITTCECVVPNLKELRKYRFRVKAVNEAGESEPSDTTGEIPATDIQEEPEVFIDIGAQDCLVCKAGSQIRIPAVIKGRPTPKSSWEFDGKAKKAMKDGVHDIPEDAQLETAENSSVIIIPECKRSHTGKYSITAKNKAGQKTANCRVKVMDVPGPPKDLKVSDITRGSCRLSWKMPDDDGGDRIKGYVIEKRTIDGKAWTKVNPDCGSTTFVVPDLLSEQQYFFRVRAENRFGIGPPVETIQRTTARDPIYPPDPPIKLKIGLITKNTVHLSWKPPKNDGGSPVTHYIVECLAWDPTGTKKEAWRQCNKRDVEELQFTVEDLVEGGEYEFRVKAVNAAGVSKPSATVGPVTVKDQTCPPSIDLKEFMEVEEGTNVNIVAKIKGVPFPTLTWFKAPPKKPDNKEPVLYDTHVNKLVVDDTCTLVIPQSRRSDTGLYTITAVNNLGTASKEMRLNVLGRPGPPVGPIKFESVSADQMTLSWFPPKDDGGSKITNYVIEKREANRKTWVHVSSEPKECTYTIPKLLEGHEYVFRIMAQNKYGIGEPLDSEPETARNLFSVPGAPDKPTVSSVTRNSMTVNWEEPEYDGGSPVTGYWLEMKDTTSKRWKRVNRDPIKAMTLGVSYKVTGLIEGSDYQFRVYAINAAGVGPASLPSDPATARDPIAPPGPPFPKVTDWTKSSADLEWSPPLKDGGSKVTGYIVEYKEEGKEEWEKGKDKEVRGTKLVVTGLKEGAFYKFRVRAVNIAGIGEPGEVTDVIEMKDRLVSPDLQLDASVRDRIVVHAGGVIRIIAYVSGKPPPTVTWNMNERTLPQEATIETTAISSSMVIKNCQRSHQGVYSLLAKNEAGERKKTIIVDVLDVPGPVGTPFLAHNLTNESCKLTWFSPEDDGGSPITNYVIEKRESDRRAWTPVTYTVTRQNATVQGLIQGKAYFFRIAAENSIGMGPFVETSEALVIREPITVPERPEDLEVKEVTKNTVTLTWNPPKYDGGSEIINYVLESRLIGTEKFHKVTNDNLLSRKYTVKGLKEGDTYEYRVSAVNIVGQGKPSFCTKPITCKDELAPPTLHLDFRDKLTIRVGEAFALTGRYSGKPKPKVSWFKDEADVLEDDRTHIKTTPATLALEKIKAKRSDSGKYCVVVENSTGSRKGFCQVNVVDRPGPPVGPVSFDEVTKDYMVISWKPPLDDGGSKITNYIIEKKEVGKDVWMPVTSASAKTTCKVSKLLEGKDYIFRIHAENLYGISDPLVSDSMKAKDRFRVPDAPDQPIVTEVTKDSALVTWNKPHDGGKPITNYILEKRETMSKRWARVTKDPIHPYTKFRVPDLLEGCQYEFRVSAENEIGIGDPSPPSKPVFAKDPIAKPSPPVNPEAIDTTCNSVDLTWQPPRHDGGSKILGYIVEYQKVGDEEWRRANHTPESCPETKYKVTGLRDGQTYKFRVLAVNAAGESDPAHVPEPVLVKDRLEPPELILDANMAREQHIKVGDTLRLSAIIKGVPFPKVTWKKEDRDAPTKARIDVTPVGSKLEIRNAAHEDGGIYSLTVENPAGSKTVSVKVLVLDKPGPPRDLEVSEIRKDSCYLTWKEPLDDGGSVITNYVVERRDVASAQWSPLSATSKKKSHFAKHLNEGNQYLFRVAAENQYGRGPFVETPKPIKALDPLHPPGPPKDLHHVDVDKTEVSLVWNKPDRDGGSPITGYLVEYQEEGTQDWIKFKTVTNLECVVTGLQQGKTYRFRVKAENIVGLGLPDTTIPIECQEKLVPPSVELDVKLIEGLVVKAGTTVRFPAIIRGVPVPTAKWTTDGSEIKTDEHYTVETDNFSSVLTIKNCLRRDTGEYQITVSNAAGSKTVAVHLTVLDVPGPPTGPINILDVTPEHMTISWQPPKDDGGSPVINYIVEKQDTRKDTWGVVSSGSSKTKLKIPHLQKGCEYVFRVRAENKIGVGPPLDSTPTVAKHKFSPPSPPGKPVVTDITENAATVSWTLPKSDGGSPITGYYMERREVTGKWVRVNKTPIADLKFRVTGLYEGNTYEFRVFAENLAGLSKPSPSSDPIKACRPIKPPGPPINPKLKDKSRETADLVWTKPLSDGGSPILGYVVECQKPGTAQWNRINKDELIRQCAFRVPGLIEGNEYRFRIKAANIVGEGEPRELAESVIAKDILHPPEVELDVTCRDVITVRVGQTIRILARVKGRPEPDITWTKEGKVLVREKRVDLIQDLPRVELQIKEAVRADHGKYIISAKNSSGHAQGSAIVNVLDRPGPCQNLKVTNVTKENCTISWENPLDNGGSEITNFIVEYRKPNQKGWSIVASDVTKRLIKANLLANNEYYFRVCAENKVGVGPTIETKTPILAINPIDRPGEPENLHIADKGKTFVYLKWRRPDYDGGSPNLSYHVERRLKGSDDWERVHKGSIKETHYMVDRCVENQIYEFRVQTKNEGGESDWVKTEEVVVKEDLQKPVLDLKLSGVLTVKAGDTIRLEAGVRGKPFPEVAWTKDKDATDLTRSPRVKIDTRADSSKFSLTKAKRSDGGKYVVTATNTAGSFVAYATVNVLDKPGPVRNLKIVDVSSDRCTVCWDPPEDDGGCEIQNYILEKCETKRMVWSTYSATVLTPGTTVTRLIEGNEYIFRVRAENKIGTGPPTESKPVIAKTKYDKPGRPDPPEVTKVSKEEMTVVWNPPEYDGGKSITGYFLEKKEKHSTRWVPVNKSAIPERRMKVQNLLPDHEYQFRVKAENEIGIGEPSLPSRPVVAKDPIEPPGPPTNFRVVDTTKHSITLGWGKPVYDGGAPIIGYVVEMRPKIADASPDEGWKRCNAAAQLVRKEFTVTSLDENQEYEFRVCAQNQVGIGRPAELKEAIKPKEILEPPEIDLDASMRKLVIVRAGCPIRLFAIVRGRPAPKVTWRKVGIDNVVRKGQVDLVDTMAFLVIPNSTRDDSGKYSLTLVNPAGEKAVFVNVRVLDTPGPVSDLKVSDVTKTSCHVSWAPPENDGGSQVTHYIVEKREADRKTWSTVTPEVKKTSFHVTNLVPGNEYYFRVTAVNEYGPGVPTDVPKPVLASDPLSEPDPPRKLEVTEMTKNSATLAWLPPLRDGGAKIDGYITSYREEEQPADRWTEYSVVKDLSLVVTGLKEGKKYKFRVAARNAVGVSLPREAEGVYEAKEQLLPPKILMPEQITIKAGKKLRIEAHVYGKPHPTCKWKKGEDEVVTSSHLAVHKADSSSILIIKDVTRKDSGYYSLTAENSSGTDTQKIKVVVMDAPGPPQPPFDISDIDADACSLSWHIPLEDGGSNITNYIVEKCDVSRGDWVTALASVTKTSCRVGKLIPGQEYIFRVRAENRFGISEPLTSPKMVAQFPFGVPSEPKNARVTKVNKDCIFVAWDRPDSDGGSPIIGYLIERKERNSLLWVKANDTLVRSTEYPCAGLVEGLEYSFRIYALNKAGSSPPSKPTEYVTARMPVDPPGKPEVIDVTKSTVSLIWARPKHDGGSKIIGYFVEACKLPGDKWVRCNTAPHQIPQEEYTATGLEEKAQYQFRAIARTAVNISPPSEPSDPVTILAENVPPRIDLSVAMKSLLTVKAGTNVCLDATVFGKPMPTVSWKKDGTLLKPAEGIKMAMQRNLCTLELFSVNRKDSGDYTITAENSSGSKSATIKLKVLDKPGPPASVKINKMYSDRAMLSWEPPLEDGGSEITNYIVDKRETSRPNWAQVSATVPITSCSVEKLIEGHEYQFRICAENKYGVGDPVFTEPAIAKNPYDPPGRCDPPVISNITKDHMTVSWKPPADDGGSPITGYLLEKRETQAVNWTKVNRKPIIERTLKATGLQEGTEYEFRVTAINKAGPGKPSDASKAAYARDPQYPPGPPAFPKVYDTTRSSVSLSWGKPAYDGGSPIIGYLVEVKRADSDNWVRCNLPQNLQKTRFEVTGLMEDTQYQFRVYAVNKIGYSDPSDVPDKHYPKDILIPPEGELDADLRKTLILRAGVTMRLYVPVKGRPPPKITWSKPNVNLRDRIGLDIKSTDFDTFLRCENVNKYDAGKYILTLENSCGKKEYTIVVKVLDTPGPPVNVTVKEISKDSAYVTWEPPIIDGGSPIINYVVQKRDAERKSWSTVTTECSKTSFRVANLEEGKSYFFRVFAENEYGIGDPGETRDAVKASQTPGPVVDLKVRSVSKSSCSIGWKKPHSDGGSRIIGYVVDFLTEENKWQRVMKSLSLQYSAKDLTEGKEYTFRVSAENENGEGTPSEITVVARDDVVAPDLDLKGLPDLCYLAKENSNFRLKIPIKGKPAPSVSWKKGEDPLATDTRVSVESSAVNTTLIVYDCQKSDAGKYTITLKNVAGTKEGTISIKVVGKPGIPTGPIKFDEVTAEAMTLKWAPPKDDGGSEITNYILEKRDSVNNKWVTCASAVQKTTFRVTRLHEGMEYTFRVSAENKYGVGEGLKSEPIVARHPFDVPDAPPPPNIVDVRHDSVSLTWTDPKKTGGSPITGYHLEFKERNSLLWKRANKTPIRMRDFKVTGLTEGLEYEFRVMAINLAGVGKPSLPSEPVVALDPIDPPGKPEVINITRNSVTLIWTEPKYDGGHKLTGYIVEKRDLPSKSWMKANHVNVPECAFTVTDLVEGGKYEFRIRAKNTAGAISAPSESTETIICKDEYEAPTIVLDPTIKDGLTIKAGDTIVLNAISILGKPLPKSSWSKAGKDIRPSDITQITSTPTSSMLTIKYATRKDAGEYTITATNPFGTKVEHVKVTVLDVPGPPGPVEISNVSAEKATLTWTPPLEDGGSPIKSYILEKRETSRLLWTVVSEDIQSCRHVATKLIQGNEYIFRVSAVNHYGKGEPVQSEPVKMVDRFGPPGPPEKPEVSNVTKNTATVSWKRPVDDGGSEITGYHVERREKKSLRWVRAIKTPVSDLRCKVTGLQEGSTYEFRVSAENRAGIGPPSEASDSVLMKDAAYPPGPPSNPHVTDTTKKSASLAWGKPHYDGGLEITGYVVEHQKVGDEAWIKDTTGTALRITQFVVPDLQTKEKYNFRISAINDAGVGEPAVIPDVEIVEREMAPDFELDAELRRTLVVRAGLSIRIFVPIKGRPAPEVTWTKDNINLKNRANIENTESFTLLIIPECNRYDTGKFVMTIENPAGKKSGFVNVRVLDTPGPVLNLRPTDITKDSVTLHWDLPLIDGGSRITNYIVEKREATRKSYSTATTKCHKCTYKVTGLSEGCEYFFRVMAENEYGIGEPTETTEPVKASEAPSPPDSLNIMDITKSTVSLAWPKPKHDGGSKITGYVIEAQRKGSDQWTHITTVKGLECVVRNLTEGEEYTFQVMAVNSAGRSAPRESRPVIVKEQTMLPELDLRGIYQKLVIAKAGDNIKVEIPVLGRPKPTVTWKKGDQILKQTQRVNFETTATSTILNINECVRSDSGPYPLTARNIVGEVGDVITIQVHDIPGPPTGPIKFDEVSSDFVTFSWDPPENDGGVPISNYVVEMRQTDSTTWVELATTVIRTTYKATRLTTGLEYQFRVKAQNRYGVGPGITSACIVANYPFKVPGPPGTPQVTAVTKDSMTISWHEPLSDGGSPILGYHVERKERNGILWQTVSKALVPGNIFKSSGLTDGIAYEFRVIAENMAGKSKPSKPSEPMLALDPIDPPGKPVPLNITRHTVTLKWAKPEYTGGFKITSYIVEKRDLPNGRWLKANFSNILENEFTVSGLTEDAAYEFRVIAKNAAGAISPPSEPSDAITCRDDVEAPKIKVDVKFKDTVILKAGEAFRLEADVSGRPPPTMEWSKDGKELEGTAKLEIKIADFSTNLVNKDSTRRDSGAYTLTATNPGGFAKHIFNVKVLDRPGPPEGPLAVTEVTSEKCVLSWFPPLDDGGAKIDHYIVQKRETSRLAWTNVASEVQVTKLKVTKLLKGNEYIFRVMAVNKYGVGEPLESEPVLAVNPYGPPDPPKNPEVTTITKDSMVVCWGHPDSDGGSEIINYIVERRDKAGQRWIKCNKKTLTDLRYKVSGLTEGHEYEFRIMAENAAGISAPSPTSPFYKACDTVFKPGPPGNPRVLDTSRSSISIAWNKPIYDGGSEITGYMVEIALPEEDEWQIVTPPAGLKATSYTITGLTENQEYKIRIYAMNSEGLGEPALVPGTPKAEDRMLPPEIELDADLRKVVTIRACCTLRLFVPIKGRPAPEVKWARDHGESLDKASIESTSSYTLLIVGNVNRFDSGKYILTVENSSGSKSAFVNVRVLDTPGPPQDLKVKEVTKTSVTLTWDPPLLDGGSKIKNYIVEKRESTRKAYSTVATNCHKTSWKVDQLQEGCSYYFRVLAENEYGIGLPAETAESVKASERPLPPGKITLMDVTRNSVSLSWEKPEHDGGSRILGYIVEMQTKGSDKWATCATVKVTEATITGLIQGEEYSFRVSAQNEKGISDPRQLSVPVIAKDLVIPPAFKLLFNTFTVLAGEDLKVDVPFIGRPTPAVTWHKDNVPLKQTTRVNAESTENNSLLTIKDACREDVGHYVVKLTNSAGEAIETLNVIVLDKPGPPTGPVKMDEVTADSITLSWGPPKYDGGSSINNYIVEKRDTSTTTWQIVSATVARTTIKACRLKTGCEYQFRIAAENRYGKSTYLNSEPTVAQYPFKVPGPPGTPVVTLSSRDSMEVQWNEPISDGGSRVIGYHLERKERNSILWVKLNKTPIPQTKFKTTGLEEGVEYEFRVSAENIVGIGKPSKVSECYVARDPCDPPGRPEAIIVTRNSVTLQWKKPTYDGGSKITGYIVEKKELPEGRWMKASFTNIIDTHFEVTGLVEDHRYEFRVIARNAAGVFSEPSESTGAITARDEVDPPRISMDPKYKDTIVVHAGESFKVDADIYGKPIPTIQWIKGDQELSNTARLEIKSTDFATSLSVKDAVRVDSGNYILKAKNVAGERSVTVNVKVLDRPGPPEGPVVISGVTAEKCTLAWKPPLQDGGSDIINYIVERRETSRLVWTVVDANVQTLSCKVTKLLEGNEYTFRIMAVNKYGVGEPLESEPVVAKNPFVVPDAPKAPEVTTVTKDSMIVVWERPASDGGSEILGYVLEKRDKEGIRWTRCHKRLIGELRLRVTGLIENHDYEFRVSAENAAGLSEPSPPSAYQKACDPIYKPGPPNNPKVIDITRSSVFLSWSKPIYDGGCEIQGYIVEKCDVSVGEWTMCTPPTGINKTNIEVEKLLEKHEYNFRICAINKAGVGEHADVPGPIIVEEKLEAPDIDLDLELRKIINIRAGGSLRLFVPIKGRPTPEVKWGKVDGEIRDAAIIDVTSSFTSLVLDNVNRYDSGKYTLTLENSSGTKSAFVTVRVLDTPSPPVNLKVTEITKDSVSITWEPPLLDGGSKIKNYIVEKREATRKSYAAVVTNCHKNSWKIDQLQEGCSYYFRVTAENEYGIGLPAQTADPIKVAEVPQPPGKITVDDVTRNSVSLSWTKPEHDGGSKIIQYIVEMQAKHSEKWSECARVKSLQAVITNLTQGEEYLFRVVAVNEKGRSDPRSLAVPIVAKDLVIEPDVKPAFSSYSVQVGQDLKIEVPISGRPKPTITWTKDGLPLKQTTRINVTDSLDLTTLSIKETHKDDGGQYGITVANVVGQKTASIEIVTLDKPDPPKGPVKFDDVSAESITLSWNPPLYTGGCQITNYIVQKRDTTTTVWDVVSATVARTTLKVTKLKTGTEYQFRIFAENRYGQSFALESDPIVAQYPYKEPGPPGTPFATAISKDSMVIQWHEPVNNGGSPVIGYHLERKERNSILWTKVNKTIIHDTQFKAQNLEEGIEYEFRVYAENIVGVGKASKNSECYVARDPCDPPGTPEPIMVKRNEITLQWTKPVYDGGSMITGYIVEKRDLPDGRWMKASFTNVIETQFTVSGLTEDQRYEFRVIAKNAAGAISKPSDSTGPITAKDEVELPRISMDPKFRDTIVVNAGETFRLEADVHGKPLPTIEWLRGDKEIEESARCEIKNTDFKALLIVKDAIRIDGGQYILRASNVAGSKSFPVNVKVLDRPGPPEGPVQVTGVTSEKCSLTWSPPLQDGGSDISHYVVEKRETSRLAWTVVASEVVTNSLKVTKLLEGNEYVFRIMAVNKYGVGEPLESAPVLMKNPFVLPGPPKSLEVTNIAKDSMTVCWNRPDSDGGSEIIGYIVEKRDRSGIRWIKCNKRRITDLRLRVTGLTEDHEYEFRVSAENAAGVGEPSPATVYYKACDPVFKPGPPTNAHIVDTTKNSITLAWGKPIYDGGSEILGYVVEICKADEEEWQIVTPQTGLRVTRFEISKLTEHQEYKIRVCALNKVGLGEATSVPGTVKPEDKLEAPELDLDSELRKGIVVRAGGSARIHIPFKGRPTPEITWSREEGEFTDKVQIEKGVNYTQLSIDNCDRNDAGKYILKLENSSGSKSAFVTVKVLDTPGPPQNLAVKEVRKDSAFLVWEPPIIDGGAKVKNYVIDKRESTRKAYANVSSKCSKTSFKVENLTEGAIYYFRVMAENEFGVGVPVETVDAVKAAEPPSPPGKVTLTDVSQTSASLMWEKPEHDGGSRVLGYVVEMQPKGTEKWSIVAESKVCNAVVTGLSSGQEYQFRVKAYNEKGKSDPRVLGVPVIAKDLTIQPSLKLPFNTYSIQAGEDLKIEIPVIGRPRPNISWVKDGEPLKQTTRVNVEETATSTVLHIKEGNKDDFGKYTVTATNSAGTATENLSVIVLEKPGPPVGPVRFDEVSADFVVISWEPPAYTGGCQISNYIVEKRDTTTTTWHMVSATVARTTIKITKLKTGTEYQFRIFAENRYGKSAPLDSKAVIVQYPFKEPGPPGTPFVTSISKDQMLVQWHEPVNDGGTKIIGYHLEQKEKNSILWVKLNKTPIQDTKFKTTGLDEGLEYEFKVSAENIVGIGKPSKVSECFVARDPCDPPGRPEAIVITRNNVTLKWKKPAYDGGSKITGYIVEKKDLPDGRWMKASFTNVLETEFTVSGLVEDQRYEFRVIARNAAGNFSEPSDSSGAITARDEIDAPNASLDPKYKDVIVVHAGETFVLEADIRGKPIPDVVWSKDGKELEETAARMEIKSTIQKTTLVVKDCIRTDGGQYILKLSNVGGTKSIPITVKVLDRPGPPEGPLKVTGVTAEKCYLAWNPPLQDGGANISHYIIEKRETSRLSWTQVSTEVQALNYKVTKLLPGNEYIFRVMAVNKYGIGEPLESGPVTACNPYKPPGPPSTPEVSAITKDSMVVTWARPVDDGGTEIEGYILEKRDKEGVRWTKCNKKTLTDLRLRVTGLTEGHSYEFRVAAENAAGVGEPSEPSVFYRACDALYPPGPPSNPKVTDTSRSSVSLAWSKPIYDGGAPVKGYVVEVKEAAADEWTTCTPPTGLQGKQFTVTKLKENTEYNFRICAINSEGVGEPATLPGSVVAQERIEPPEIELDADLRKVVVLRASATLRLFVTIKGRPEPEVKWEKAEGILTDRAQIEVTSSFTMLVIDNVTRFDSGRYNLTLENNSGSKTAFVNVRVLDSPSAPVNLTIREVKKDSVTLSWEPPLIDGGAKITNYIVEKRETTRKAYATITNNCTKTTFRIENLQEGCSYYFRVLASNEYGIGLPAETTEPVKVSEPPLPPGRVTLVDVTRNTATIKWEKPESDGGSKITGYVVEMQTKGSEKWSTCTQVKTLEATISGLTAGEEYVFRVAAVNEKGRSDPRQLGVPVIARDIEIKPSVELPFHTFNVKAREQLKIDVPFKGRPQATVNWRKDGQTLKETTRVNVSSSKTVTSLSIKEASKEDVGTYELCVSNSAGSITVPITIIVLDRPGPPGPIRIDEVSCDSITISWNPPEYDGGCQISNYIVEKKETTSTTWHIVSQAVARTSIKIVRLTTGSEYQFRVCAENRYGKSSYSESSAVVAEYPFSPPGPPGTPKVVHATKSTMLVTWQVPVNDGGSRVIGYHLEYKERSSILWSKANKILIADTQMKVSGLDEGLMYEYRVYAENIAGIGKCSKSCEPVPARDPCDPPGQPEVTNITRKSVSLKWSKPHYDGGAKITGYIVERRELPDGRWLKCNYTNIQETYFEVTELTEDQRYEFRVFARNAADSVSEPSESTGPIIVKDDVEPPRVMMDVKFRDVIVVKAGEVLKINADIAGRPLPVISWAKDGIEIEERARTEIISTDNHTLLTVKDCIRRDTGQYVLTLKNVAGTRSVAVNCKVLDKPGPPAGPLEINGLTAEKCSLSWGRPQEDGGADIDYYIVEKRETSHLAWTICEGELQMTSCKVTKLLKGNEYIFRVTGVNKYGVGEPLESVAIKALDPFTVPSPPTSLEITSVTKESMTLCWSRPESDGGSEISGYIIERREKNSLRWVRVNKKPVYDLRVKSTGLREGCEYEYRVYAENAAGLSLPSETSPLIRAEDPVFLPSPPSKPKIVDSGKTTITIAWVKPLFDGGAPITGYTVEYKKSDDTDWKTSIQSLRGTEYTISGLTTGAEYVFRVKSVNKVGASDPSDSSDPQIAKEREEEPLFDIDSEMRKTLIVKAGASFTMTVPFRGRPVPNVLWSKPDTDLRTRAYVDTTDSRTSLTIENANRNDSGKYTLTIQNVLSAASLTLVVKVLDTPGPPTNITVQDVTKESAVLSWDVPENDGGAPVKNYHIEKREASKKAWVSVTNNCNRLSYKVTNLQEGAIYYFRVSGENEFGVGIPAETKEGVKITEKPSPPEKLGVTSISKDSVSLTWLKPEHDGGSRIVHYVVEALEKGQKNWVKCAVAKSTHHVVSGLRENSEYFFRVFAENQAGLSDPRELLLPVLIKEQLEPPEIDMKNFPSHTVYVRAGSNLKVDIPISGKPLPKVTLSRDGVPLKATMRFNTEITAENLTINLKESVTADAGRYEITAANSSGTTKAFINIVVLDRPGPPTGPVVISDITEESVTLKWEPPKYDGGSQVTNYILLKRETSTAVWTEVSATVARTMMKVMKLTTGEEYQFRIKAENRFGISDHIDSACVTVKLPYTTPGPPSTPWVTNVTRESITVGWHEPVSNGGSAVVGYHLEMKDRNSILWQKANKLVIRTTHFKVTTISAGLIYEFRVYAENAAGVGKPSHPSEPVLAIDACEPPRNVRITDISKNSVSLSWQQPAFDGGSKITGYIVERRDLPDGRWTKASFTNVTETQFIISGLTQNSQYEFRVFARNAVGSISNPSEVVGPITCIDSYGGPVIDLPLEYTEVVKYRAGTSVKLRAGISGKPAPTIEWYKDDKELQTNALVCVENTTDLASILIKDADRLNSGCYELKLRNAMGSASATIRVQILDKPGPPGGPIEFKTVTAEKITLLWRPPADDGGAKITHYIVEKRETSRVVWSMVSEHLEECIITTTKIIKGNEYIFRVRAVNKYGIGEPLESDSVVAKNAFVTPGPPGIPEVTKITKNSMTVVWSRPIADGGSDISGYFLEKRDKKSLGWFKVLKETIRDTRQKVTGLTENSDYQYRVCAVNAAGQGPFSEPSEFYKAADPIDPPGPPAKIRIADSTKSSITLGWSKPVYDGGSAVTGYVVEIRQGEEEEWTTVSTKGEVRTTEYVVSNLKPGVNYYFRVSAVNCAGQGEPIEMNEPVQAKDILEAPEIDLDVALRTSVIAKAGEDVQVLIPFKGRPPPTVTWRKDEKNLGSDARYSIENTDSSSLLTIPQVTRNDTGKYILTIENGVGEPKSSTVSVKVLDTPAACQKLQVKHVSRGTVTLLWDPPLIDGGSPIINYVIEKRDATKRTWSVVSHKCSSTSFKLIDLSEKTPFFFRVLAENEIGIGEPCETTEPVKAAEVPAPIRDLSMKDSTKTSVILSWTKPDFDGGSVITEYVVERKGKGEQTWSHAGISKTCEIEVSQLKEQSVLEFRVFAKNEKGLSDPVTIGPITVKELIITPEVDLSDIPGAQVTVRIGHNVHLELPYKGKPKPSISWLKDGLPLKESEFVRFSKTENKITLSIKNAKKEHGGKYTVILDNAVCRIAVPITVITLGPPSKPKGPIRFDEIKADSVILSWDVPEDNGGGEITCYSIEKRETSQTNWKMVCSSVARTTFKVPNLVKDAEYQFRVRAENRYGVSQPLVSSIIVAKHQFRIPGPPGKPVIYNVTSDGMSLTWDAPVYDGGSEVTGFHVEKKERNSILWQKVNTSPISGREYRATGLVEGLDYQFRVYAENSAGLSSPSDPSKFTLAVSPVDPPGTPDYIDVTRETITLKWNPPLRDGGSKIVGYSIEKRQGNERWVRCNFTDVSECQYTVTGLSPGDRYEFRIIARNAVGTISPPSQSSGIIMTRDENVPPIVEFGPEYFDGLIIKSGESLRIKALVQGRPVPRVTWFKDGVEIEKRMNMEITDVLGSTSLFVRDATRDHRGVYTVEAKNASGSAKAEIKVKVQDTPGKVVGPIRFTNITGEKMTLWWDAPLNDGCAPITHYIIEKRETSRLAWALIEDKCEAQSYTAIKLINGNEYQFRVSAVNKFGVGRPLDSDPVVAQIQYTVPDAPGIPEPSNITGNSITLTWARPESDGGSEIQQYILERREKKSTRWVKVISKRPISETRFKVTGLTEGNEYEFHVMAENAAGVGPASGISRLIKCREPVNPPGPPTVVKVTDTSKTTVSLEWSKPVFDGGMEIIGYIIEMCKADLGDWHKVNAEACVKTRYTVTDLQAGEEYKFRVSAINGAGKGDSCEVTGTIKAVDRLTAPELDIDANFKQTHVVRAGASIRLFIAYQGRPTPTAVWSKPDSNLSLRADIHTTDSFSTLTVENCNRNDAGKYTLTVENNSGSKSITFTVKVLDTPGPPGPITFKDVTRGSATLMWDAPLLDGGARIHHYVVEKREASRRSWQVISEKCTRQIFKVNDLAEGVPYYFRVSAVNEYGVGEPYEMPEPIVATEQPAPPRRLDVVDTSKSSAVLAWLKPDHDGGSRITGYLLEMRQKGSDFWVEAGHTKQLTFTVERLVEKTEYEFRVKAKNDAGYSEPREAFSSVIIKEPQIEPTADLTGITNQLITCKAGSPFTIDVPISGRPAPKVTWKLEEMRLKETDRVSITTTKDRTTLTVKDSMRGDSGRYFLTLENTAGVKTFSVTVVVIGRPGPVTGPIEVSSVSAESCVLSWGEPKDGGGTEITNYIVEKRESGTTAWQLVNSSVKRTQIKVTHLTKYMEYSFRVSSENRFGVSKPLESAPIIAEHPFVPPSAPTRPEVYHVSANAMSIRWEEPYHDGGSKIIGYWVEKKERNTILWVKENKVPCLECNYKVTGLVEGLEYQFRTYALNAAGVSKASEASRPIMAQNPVDAPGRPEVTDVTRSTVSLIWSAPAYDGGSKVVGYIIERKPVSEVGDGRWLKCNYTIVSDNFFTVTALSEGDTYEFRVLAKNAAGVISKGSESTGPVTCRDEYAPPKAELDARLHGDLVTIRAGSDLVLDAAVGGKPEPKIIWTKGDKELDLCEKVSLQYTGKRATAVIKFCDRSDSGKYTLTVKNASGTKAVSVMVKVLDSPGPCGKLTVSRVTQEKCTLAWSLPQEDGGAEITHYIVERRETSRLNWVIVEGECPTLSYVVTRLIKNNEYIFRVRAVNKYGPGVPVESEPIVARNSFTIPSPPGIPEEVGTGKEHIIIQWTKPESDGGNEISNYLVDKREKKSLRWTRVNKDYVVYDTRLKVTSLMEGCDYQFRVTAVNAAGNSEPSEASNFISCREPSYTPGPPSAPRVVDTTKHSISLAWTKPMYDGGTDIVGYVLEMQEKDTDQWYRVHTNATIRNTEFTVPDLKMGQKYSFRVAAVNVKGMSEYSESIAEIEPVERIEIPDLELADDLKKTVTIRAGASLRLMVSVSGRPPPVITWSKQGIDLASRAIIDTTESYSLLIVDKVNRYDAGKYTIEAENQSGKKSATVLVKVYDTPGPCPSVKVKEVSRDSVTITWEIPTIDGGAPVNNYIVEKREAAMRAFKTVTTKCSKTLYRISGLVEGTMYYFRVLPENIYGIGEPCETSDAVLVSEVPLVPAKLEVVDVTKSTVTLAWEKPLYDGGSRLTGYVLEACKAGTERWMKVVTLKPTVLEHTVTSLNEGEQYLFRIRAQNEKGVSEPRETVTAVTVQDLRVLPTIDLSTMPQKTIHVPAGRPVELVIPIAGRPPPAASWFFAGSKLRESERVTVETHTKVAKLTIRETTIRDTGEYTLELKNVTGTTSETIKVIILDKPGPPTGPIKIDEIDATSITISWEPPELDGGAPLSGYVVEQRDAHRPGWLPVSESVTRSTFKFTRLTEGNEYVFRVAATNRFGIGSYLQSEVIECRSSIRIPGPPETLQIFDVSRDGMTLTWYPPEDDGGSQVTGYIVERKEVRADRWVRVNKVPVTMTRYRSTGLTEGLEYEHRVTAINARGSGKPSRPSKPIVAMDPIAPPGKPQNPRVTDTTRTSVSLAWSVPEDEGGSKVTGYLIEMQKVDQHEWTKCNTTPTKIREYTLTHLPQGAEYRFRVLACNAGGPGEPAEVPGTVKVTEMLEYPDYELDERYQEGIFVRQGGVIRLTIPIKGKPFPICKWTKEGQDISKRAMIATSETHTELVIKEADRGDSGTYDLVLENKCGKKAVYIKVRVIGSPNSPEGPLEYDDIQVRSVRVSWRPPADDGGADILGYILERREVPKAAWYTIDSRVRGTSLVVKGLKENVEYHFRVSAENQFGISKPLKSEEPVTPKTPLNPPEPPSNPPEVLDVTKSSVSLSWSRPKDDGGSRVTGYYIERKETSTDKWVRHNKTQITTTMYTVTGLVPDAEYQFRIIAQNDVGLSETSPASEPVVCKDPFDKPSQPGELEILSISKDSVTLQWEKPECDGGKEILGYWVEYRQSGDSAWKKSNKERIKDKQFTIGGLLEATEYEFRVFAENETGLSRPRRTAMSIKTKLTSGEAPGIRKEMKDVTTKLGEAAQLSCQIVGRPLPDIKWYRFGKELIQSRKYKMSSDGRTHTLTVMTEEQEDEGVYTCIATNEVGEVETSSKLLLQATPQFHPGYPLKEKYYGAVGSTLRLHVMYIGRPVPAMTWFHGQKLLQNSENITIENTEHYTHLVMKNVQRKTHAGKYKVQLSNVFGTVDAILDVEIQDKPDKPTGPIVIEALLKNSAVISWKPPADDGGSWITNYVVEKCEAKEGAEWQLVSSAISVTTCRIVNLTENAGYYFRVSAQNTFGISDPLEVSSVVIIKSPFEKPGAPGKPTITAVTKDSCVVAWKPPASDGGAKIRNYYLEKREKKQNKWISVTTEEIRETVFSVKNLIEGLEYEFRVKCENLGGESEWSEISEPITPKSDVPIQAPHFKEELRNLNVRYQSNATLVCKVTGHPKPIVKWYRQGKEIIADGLKYRIQEFKGGYHQLIIASVTDDDATVYQVRATNQGGSVSGTASLEVEVPAKIHLPKTLEGMGAVHALRGEVVSIKIPFSGKPDPVITWQKGQDLIDNNGHYQVIVTRSFTSLVFPNGVERKDAGFYVVCAKNRFGIDQKTVELDVADVPDPPRGVKVSDVSRDSVNLTWTEPASDGGSKITNYIVEKCATTAERWLRVGQARETRYTVINLFGKTSYQFRVIAENKFGLSKPSEPSEPTITKEDKTRAMNYDEEVDETREVSMTKASHSSTKELYEKYMIAEDLGRGEFGIVHRCVETSSKKTYMAKFVKVKGTDQVLVKKEISILNIARHRNILHLHESFESMEELVMIFEFISGLDIFERINTSAFELNEREIVSYVHQVCEALQFLHSHNIGHFDIRPENIIYQTRRSSTIKIIEFGQARQLKPGDNFRLLFTAPEYYAPEVHQHDVVSTATDMWSLGTLVYVLLSGINPFLAETNQQIIENIMNAEYTFDEEAFKEISIEAMDFVDRLLVKERKSRMTASEALQHPWLKQKIERVSTKVIRTLKHRRYYHTLIKKDLNMVVSAARISCGGAIRSQKGVSVAKVKVASIEIGPVSGQIMHAVGEEGGHVKYVCKIENYDQSTQVTWYFGVRQLENSEKYEITYEDGVAILYVKDITKLDDGTYRCKVVNDYGEDSSYAELFVKGVREVYDYYCRRTMKKIKRRTDTMRLLERPPEFTLPLYNKTAYVGENVRFGVTITVHPEPHVTWYKSGQKIKPGDNDKKYTFESDKGLYQLTINSVTTDDDAEYTVVARNKYGEDSCKAKLTVTLHPPPTDSTLRPMFKRLLANAECQEGQSVCFEIRVSGIPPPTLKWEKDGQPLSLGPNIEIIHEGLDYYALHIRDTLPEDTGYYRVTATNTAGSTSCQAHLQVERLRYKKQEFKSKEEHERHVQKQIDKTLRMAEILSGTESVPLTQVAKEALREAAVLYKPAVSTKTVKGEFRLEIEEKKEERKLRMPYDVPEPRKYKQTTIEEDQRIKQFVPMSDMKWYKKIRDQYEMPGKLDRVVQKRPKRIRLSRWEQFYVMPLPRITDQYRPKWRIPKLSQDDLEIVRPARRRTPSPDYDFYYRPRRRSLGDISDEELLLPIDDYLAMKRTEEERLRLEEELELGFSASPPSRSPPHFELSSLRYSSPQAHVKVEETRKDFRYSTYHIPTKAEASTSYAELRERHAQAAYRQPKQRQRIMAEREDEELLRPVTTTQHLSEYKSELDFMSKEEKSRKKSRRQREVTEITEIEEEYEISKHAQRESSSSASRLLRRRRSLSPTYIELMRPVSELIRSRPQPAEEYEDDTERRSPTPERTRPRSPSPVSSERSLSRFERSARFDIFSRYESMKAALKTQKTSERKYEVLSQQPFTLDHAPRITLRMRSHRVPCGQNTRFILNVQSKPTAEVKWYHNGVELQESSKIHYTNTSGVLTLEILDCHTDDSGTYRAVCTNYKGEASDYATLDVTGGDYTTYASQRRDEEVPRSVFPELTRTEAYAVSSFKKTSEMEASSSVREVKSQMTETRESLSSYEHSASAEMKSAALEEKSLEEKSTTRKIKTTLAARILTKPRSMTVYEGESARFSCDTDGEPVPTVTWLRKGQVLSTSARHQVTTTKYKSTFEISSVQASDEGNYSVVVENSEGKQEAEFTLTIQKARVTEKAVTSPPRVKSPEPRVKSPEAVKSPKRVKSPEPSHPKAVSPTETKPTPTEKVQHLPVSAPPKITQFLKAEASKEIAKLTCVVESSVLRAKEVTWYKDGKKLKENGHFQFHYSADGTYELKINNLTESDQGEYVCEISGEGGTSKTNLQFMGQAFKSIHEKVSKISETKKSDQKTTESTVTRKTEPKAPEPISSKPVIVTGLQDTTVSSDSVAKFAVKATGEPRPTAIWTKDGKAITQGGKYKLSEDKGGFFLEIHKTDTSDSGLYTCTVKNSAGSVSSSCKLTIKAIKDTEAQKVSTQKTSEITPQKKAVVQEEISQKALRSEEIKMSEAKSQEKLALKEEASKVLISEEVKKSAATSLEKSIVHEEITKTSQASEEVRTHAEIKAFSTQMSINEGQRLVLKANIAGATDVKWVLNGVELTNSEEYRYGVSGSDQTLTIKQASHRDEGILTCISKTKEGIVKCQYDLTLSKELSDAPAFISQPRSQNINEGQNVLFTCEISGEPSPEIEWFKNNLPISISSNVSISRSRNVYSLEIRNASVSDSGKYTIKAKNFRGQCSATASLMVLPLVEEPSREVVLRTSGDTSLQGSFSSQSVQMSASKQEASFSSFSSSSASSMTEMKFASMSAQSMSSMQESFVEMSSSSFMGISNMTQLESSTSKMLKAGIRGIPPKIEALPSDISIDEGKVLTVACAFTGEPTPEVTWSCGGRKIHSQEQGRFHIENTDDLTTLIIMDVQKQDGGLYTLSLGNEFGSDSATVNIHIRSI</sequence>
<dbReference type="EC" id="2.7.11.1"/>
<dbReference type="EMBL" id="X90568">
    <property type="protein sequence ID" value="CAA62188.1"/>
    <property type="status" value="ALT_FRAME"/>
    <property type="molecule type" value="mRNA"/>
</dbReference>
<dbReference type="EMBL" id="X90569">
    <property type="protein sequence ID" value="CAA62189.1"/>
    <property type="molecule type" value="mRNA"/>
</dbReference>
<dbReference type="EMBL" id="AJ277892">
    <property type="protein sequence ID" value="CAD12455.1"/>
    <property type="status" value="ALT_FRAME"/>
    <property type="molecule type" value="Genomic_DNA"/>
</dbReference>
<dbReference type="EMBL" id="AJ277892">
    <property type="protein sequence ID" value="CAD12456.1"/>
    <property type="molecule type" value="Genomic_DNA"/>
</dbReference>
<dbReference type="EMBL" id="AJ277892">
    <property type="protein sequence ID" value="CAD12457.1"/>
    <property type="molecule type" value="Genomic_DNA"/>
</dbReference>
<dbReference type="EMBL" id="AJ277892">
    <property type="protein sequence ID" value="CAD12458.1"/>
    <property type="molecule type" value="Genomic_DNA"/>
</dbReference>
<dbReference type="EMBL" id="AJ277892">
    <property type="protein sequence ID" value="CAD12459.1"/>
    <property type="molecule type" value="Genomic_DNA"/>
</dbReference>
<dbReference type="EMBL" id="AC009948">
    <property type="status" value="NOT_ANNOTATED_CDS"/>
    <property type="molecule type" value="Genomic_DNA"/>
</dbReference>
<dbReference type="EMBL" id="AC010680">
    <property type="status" value="NOT_ANNOTATED_CDS"/>
    <property type="molecule type" value="Genomic_DNA"/>
</dbReference>
<dbReference type="EMBL" id="AC023270">
    <property type="protein sequence ID" value="AAX88844.1"/>
    <property type="molecule type" value="Genomic_DNA"/>
</dbReference>
<dbReference type="EMBL" id="FJ695199">
    <property type="status" value="NOT_ANNOTATED_CDS"/>
    <property type="molecule type" value="Genomic_DNA"/>
</dbReference>
<dbReference type="EMBL" id="KF459616">
    <property type="status" value="NOT_ANNOTATED_CDS"/>
    <property type="molecule type" value="Genomic_DNA"/>
</dbReference>
<dbReference type="EMBL" id="BC013396">
    <property type="protein sequence ID" value="AAH13396.1"/>
    <property type="molecule type" value="mRNA"/>
</dbReference>
<dbReference type="EMBL" id="BC058824">
    <property type="protein sequence ID" value="AAH58824.1"/>
    <property type="status" value="ALT_SEQ"/>
    <property type="molecule type" value="mRNA"/>
</dbReference>
<dbReference type="EMBL" id="BC070170">
    <property type="protein sequence ID" value="AAH70170.1"/>
    <property type="status" value="ALT_SEQ"/>
    <property type="molecule type" value="mRNA"/>
</dbReference>
<dbReference type="EMBL" id="BC107797">
    <property type="protein sequence ID" value="AAI07798.1"/>
    <property type="molecule type" value="mRNA"/>
</dbReference>
<dbReference type="EMBL" id="X98114">
    <property type="protein sequence ID" value="CAA66795.1"/>
    <property type="molecule type" value="mRNA"/>
</dbReference>
<dbReference type="EMBL" id="X98115">
    <property type="protein sequence ID" value="CAA66796.1"/>
    <property type="molecule type" value="mRNA"/>
</dbReference>
<dbReference type="EMBL" id="X83270">
    <property type="protein sequence ID" value="CAA58243.1"/>
    <property type="molecule type" value="mRNA"/>
</dbReference>
<dbReference type="EMBL" id="AF058332">
    <property type="protein sequence ID" value="AAD22603.1"/>
    <property type="molecule type" value="Genomic_DNA"/>
</dbReference>
<dbReference type="EMBL" id="AF058332">
    <property type="protein sequence ID" value="AAD22604.1"/>
    <property type="molecule type" value="Genomic_DNA"/>
</dbReference>
<dbReference type="EMBL" id="AF525413">
    <property type="protein sequence ID" value="AAP80791.1"/>
    <property type="molecule type" value="mRNA"/>
</dbReference>
<dbReference type="EMBL" id="DQ248309">
    <property type="protein sequence ID" value="ABB55264.1"/>
    <property type="molecule type" value="mRNA"/>
</dbReference>
<dbReference type="EMBL" id="X64698">
    <property type="protein sequence ID" value="CAA45939.1"/>
    <property type="molecule type" value="mRNA"/>
</dbReference>
<dbReference type="EMBL" id="X64699">
    <property type="protein sequence ID" value="CAA45940.1"/>
    <property type="molecule type" value="Genomic_DNA"/>
</dbReference>
<dbReference type="EMBL" id="X64697">
    <property type="protein sequence ID" value="CAA45938.1"/>
    <property type="molecule type" value="mRNA"/>
</dbReference>
<dbReference type="EMBL" id="X69490">
    <property type="protein sequence ID" value="CAA49245.1"/>
    <property type="molecule type" value="mRNA"/>
</dbReference>
<dbReference type="EMBL" id="AL713647">
    <property type="protein sequence ID" value="CAD28458.1"/>
    <property type="molecule type" value="mRNA"/>
</dbReference>
<dbReference type="CCDS" id="CCDS33337.1">
    <molecule id="Q8WZ42-6"/>
</dbReference>
<dbReference type="CCDS" id="CCDS54421.1">
    <molecule id="Q8WZ42-3"/>
</dbReference>
<dbReference type="CCDS" id="CCDS54422.1">
    <molecule id="Q8WZ42-9"/>
</dbReference>
<dbReference type="CCDS" id="CCDS54423.1">
    <molecule id="Q8WZ42-10"/>
</dbReference>
<dbReference type="CCDS" id="CCDS54424.1">
    <molecule id="Q8WZ42-11"/>
</dbReference>
<dbReference type="CCDS" id="CCDS59435.1">
    <molecule id="Q8WZ42-12"/>
</dbReference>
<dbReference type="PIR" id="I38344">
    <property type="entry name" value="I38344"/>
</dbReference>
<dbReference type="PIR" id="I38346">
    <property type="entry name" value="I38346"/>
</dbReference>
<dbReference type="RefSeq" id="NP_001243779.1">
    <molecule id="Q8WZ42-1"/>
    <property type="nucleotide sequence ID" value="NM_001256850.1"/>
</dbReference>
<dbReference type="RefSeq" id="NP_001254479.2">
    <molecule id="Q8WZ42-12"/>
    <property type="nucleotide sequence ID" value="NM_001267550.2"/>
</dbReference>
<dbReference type="RefSeq" id="NP_003310.4">
    <molecule id="Q8WZ42-3"/>
    <property type="nucleotide sequence ID" value="NM_003319.4"/>
</dbReference>
<dbReference type="RefSeq" id="NP_596869.4">
    <molecule id="Q8WZ42-11"/>
    <property type="nucleotide sequence ID" value="NM_133378.4"/>
</dbReference>
<dbReference type="RefSeq" id="NP_596870.2">
    <molecule id="Q8WZ42-6"/>
    <property type="nucleotide sequence ID" value="NM_133379.5"/>
</dbReference>
<dbReference type="RefSeq" id="NP_597676.3">
    <molecule id="Q8WZ42-10"/>
    <property type="nucleotide sequence ID" value="NM_133432.3"/>
</dbReference>
<dbReference type="PDB" id="1BPV">
    <property type="method" value="NMR"/>
    <property type="chains" value="A=22283-22385"/>
</dbReference>
<dbReference type="PDB" id="1G1C">
    <property type="method" value="X-ray"/>
    <property type="resolution" value="2.10 A"/>
    <property type="chains" value="A/B=2073-2171"/>
</dbReference>
<dbReference type="PDB" id="1NCT">
    <property type="method" value="NMR"/>
    <property type="chains" value="A=33483-33579"/>
</dbReference>
<dbReference type="PDB" id="1NCU">
    <property type="method" value="NMR"/>
    <property type="chains" value="A=33483-33579"/>
</dbReference>
<dbReference type="PDB" id="1TIT">
    <property type="method" value="NMR"/>
    <property type="chains" value="A=12680-12765"/>
</dbReference>
<dbReference type="PDB" id="1TIU">
    <property type="method" value="NMR"/>
    <property type="chains" value="A=12680-12765"/>
</dbReference>
<dbReference type="PDB" id="1TKI">
    <property type="method" value="X-ray"/>
    <property type="resolution" value="2.00 A"/>
    <property type="chains" value="A/B=32172-32492"/>
</dbReference>
<dbReference type="PDB" id="1TNM">
    <property type="method" value="NMR"/>
    <property type="chains" value="A=33489-33579"/>
</dbReference>
<dbReference type="PDB" id="1TNN">
    <property type="method" value="NMR"/>
    <property type="chains" value="A=33489-33579"/>
</dbReference>
<dbReference type="PDB" id="1WAA">
    <property type="method" value="X-ray"/>
    <property type="resolution" value="1.80 A"/>
    <property type="chains" value="A/B/C/D/E/F=12677-12765"/>
</dbReference>
<dbReference type="PDB" id="1YA5">
    <property type="method" value="X-ray"/>
    <property type="resolution" value="2.44 A"/>
    <property type="chains" value="A/B=1-196"/>
</dbReference>
<dbReference type="PDB" id="2A38">
    <property type="method" value="X-ray"/>
    <property type="resolution" value="2.00 A"/>
    <property type="chains" value="A/B/C=1-194"/>
</dbReference>
<dbReference type="PDB" id="2BK8">
    <property type="method" value="X-ray"/>
    <property type="resolution" value="1.69 A"/>
    <property type="chains" value="A=32497-32590"/>
</dbReference>
<dbReference type="PDB" id="2F8V">
    <property type="method" value="X-ray"/>
    <property type="resolution" value="2.75 A"/>
    <property type="chains" value="A/B/C/D=1-196"/>
</dbReference>
<dbReference type="PDB" id="2ILL">
    <property type="method" value="X-ray"/>
    <property type="resolution" value="2.20 A"/>
    <property type="chains" value="A=31854-32047"/>
</dbReference>
<dbReference type="PDB" id="2J8H">
    <property type="method" value="X-ray"/>
    <property type="resolution" value="1.99 A"/>
    <property type="chains" value="A=31854-32047"/>
</dbReference>
<dbReference type="PDB" id="2J8O">
    <property type="method" value="X-ray"/>
    <property type="resolution" value="2.49 A"/>
    <property type="chains" value="A/B=31854-32047"/>
</dbReference>
<dbReference type="PDB" id="2NZI">
    <property type="method" value="X-ray"/>
    <property type="resolution" value="2.90 A"/>
    <property type="chains" value="A/B=31854-32155"/>
</dbReference>
<dbReference type="PDB" id="2RQ8">
    <property type="method" value="NMR"/>
    <property type="chains" value="A=12677-12765"/>
</dbReference>
<dbReference type="PDB" id="2WP3">
    <property type="method" value="X-ray"/>
    <property type="resolution" value="1.48 A"/>
    <property type="chains" value="T=34252-34350"/>
</dbReference>
<dbReference type="PDB" id="2WWK">
    <property type="method" value="X-ray"/>
    <property type="resolution" value="1.70 A"/>
    <property type="chains" value="T=34252-34350"/>
</dbReference>
<dbReference type="PDB" id="2WWM">
    <property type="method" value="X-ray"/>
    <property type="resolution" value="2.30 A"/>
    <property type="chains" value="D/T=34252-34350"/>
</dbReference>
<dbReference type="PDB" id="2Y9R">
    <property type="method" value="X-ray"/>
    <property type="resolution" value="1.90 A"/>
    <property type="chains" value="T=34252-34350"/>
</dbReference>
<dbReference type="PDB" id="3B43">
    <property type="method" value="X-ray"/>
    <property type="resolution" value="3.30 A"/>
    <property type="chains" value="A=7945-8511"/>
</dbReference>
<dbReference type="PDB" id="3KNB">
    <property type="method" value="X-ray"/>
    <property type="resolution" value="1.40 A"/>
    <property type="chains" value="A=34253-34350"/>
</dbReference>
<dbReference type="PDB" id="3LCY">
    <property type="method" value="X-ray"/>
    <property type="resolution" value="2.50 A"/>
    <property type="chains" value="A/B/C/D=31456-31649"/>
</dbReference>
<dbReference type="PDB" id="3LPW">
    <property type="method" value="X-ray"/>
    <property type="resolution" value="1.65 A"/>
    <property type="chains" value="A/B=22877-23070"/>
</dbReference>
<dbReference type="PDB" id="3PUC">
    <property type="method" value="X-ray"/>
    <property type="resolution" value="0.96 A"/>
    <property type="chains" value="A=33774-33871"/>
</dbReference>
<dbReference type="PDB" id="3Q5O">
    <property type="method" value="X-ray"/>
    <property type="resolution" value="2.05 A"/>
    <property type="chains" value="A/B=34253-34350"/>
</dbReference>
<dbReference type="PDB" id="3QP3">
    <property type="method" value="X-ray"/>
    <property type="resolution" value="2.00 A"/>
    <property type="chains" value="A/B/C=33294-33395"/>
</dbReference>
<dbReference type="PDB" id="4C4K">
    <property type="method" value="X-ray"/>
    <property type="resolution" value="1.95 A"/>
    <property type="chains" value="T=34252-34350"/>
</dbReference>
<dbReference type="PDB" id="4JNW">
    <property type="method" value="X-ray"/>
    <property type="resolution" value="2.06 A"/>
    <property type="chains" value="A/B=32172-32492"/>
</dbReference>
<dbReference type="PDB" id="4O00">
    <property type="method" value="X-ray"/>
    <property type="resolution" value="1.85 A"/>
    <property type="chains" value="A/B=14217-14319"/>
</dbReference>
<dbReference type="PDB" id="4QEG">
    <property type="method" value="X-ray"/>
    <property type="resolution" value="2.00 A"/>
    <property type="chains" value="A=2880-2967"/>
</dbReference>
<dbReference type="PDB" id="4UOW">
    <property type="method" value="X-ray"/>
    <property type="resolution" value="3.30 A"/>
    <property type="chains" value="1/3/5/7/9/B/D/F/H/J/L/N/P/R/T/V/X/Z=7-99"/>
</dbReference>
<dbReference type="PDB" id="5BS0">
    <property type="method" value="X-ray"/>
    <property type="resolution" value="2.40 A"/>
    <property type="chains" value="C=24337-24345"/>
</dbReference>
<dbReference type="PDB" id="5JDD">
    <property type="method" value="X-ray"/>
    <property type="resolution" value="1.53 A"/>
    <property type="chains" value="A=2795-3053"/>
</dbReference>
<dbReference type="PDB" id="5JDE">
    <property type="method" value="X-ray"/>
    <property type="resolution" value="1.90 A"/>
    <property type="chains" value="A/B=2795-3053"/>
</dbReference>
<dbReference type="PDB" id="5JDJ">
    <property type="method" value="X-ray"/>
    <property type="resolution" value="1.74 A"/>
    <property type="chains" value="A/B/C/D/E/F/G/H/I/J/K/L/M/N/O/P=2880-2967"/>
</dbReference>
<dbReference type="PDB" id="5JOE">
    <property type="method" value="X-ray"/>
    <property type="resolution" value="2.00 A"/>
    <property type="chains" value="A=9582-9671"/>
</dbReference>
<dbReference type="PDB" id="6DL4">
    <property type="method" value="NMR"/>
    <property type="chains" value="A=1821-1931"/>
</dbReference>
<dbReference type="PDB" id="6FWX">
    <property type="method" value="X-ray"/>
    <property type="resolution" value="3.00 A"/>
    <property type="chains" value="A/B=1-243"/>
</dbReference>
<dbReference type="PDB" id="6H4L">
    <property type="method" value="X-ray"/>
    <property type="resolution" value="1.60 A"/>
    <property type="chains" value="A=33294-33395"/>
</dbReference>
<dbReference type="PDB" id="6HCI">
    <property type="method" value="X-ray"/>
    <property type="resolution" value="2.12 A"/>
    <property type="chains" value="A/B/C/D=32712-32816"/>
</dbReference>
<dbReference type="PDB" id="6I0Y">
    <property type="method" value="EM"/>
    <property type="resolution" value="3.20 A"/>
    <property type="chains" value="z=12677-12765"/>
</dbReference>
<dbReference type="PDB" id="6SDB">
    <property type="method" value="X-ray"/>
    <property type="resolution" value="2.80 A"/>
    <property type="chains" value="A/B/C/D/E=3-196"/>
</dbReference>
<dbReference type="PDB" id="6YGN">
    <property type="method" value="X-ray"/>
    <property type="resolution" value="2.40 A"/>
    <property type="chains" value="A/B=32046-32594"/>
</dbReference>
<dbReference type="PDB" id="7AHS">
    <property type="method" value="X-ray"/>
    <property type="resolution" value="2.05 A"/>
    <property type="chains" value="A/B/C/D=9582-9851"/>
</dbReference>
<dbReference type="PDB" id="7NIP">
    <property type="method" value="NMR"/>
    <property type="chains" value="A=9504-9544"/>
</dbReference>
<dbReference type="PDB" id="8BNQ">
    <property type="method" value="X-ray"/>
    <property type="resolution" value="2.30 A"/>
    <property type="chains" value="A/B=23562-23862"/>
</dbReference>
<dbReference type="PDB" id="8BVO">
    <property type="method" value="X-ray"/>
    <property type="resolution" value="2.55 A"/>
    <property type="chains" value="A=14415-14609"/>
</dbReference>
<dbReference type="PDB" id="8BW6">
    <property type="method" value="X-ray"/>
    <property type="resolution" value="1.95 A"/>
    <property type="chains" value="A=14415-14509"/>
</dbReference>
<dbReference type="PDB" id="8BXR">
    <property type="method" value="X-ray"/>
    <property type="resolution" value="2.70 A"/>
    <property type="chains" value="A=14319-14615"/>
</dbReference>
<dbReference type="PDB" id="8G4L">
    <property type="method" value="EM"/>
    <property type="resolution" value="6.40 A"/>
    <property type="chains" value="am/an/bm/bn/m/n=22784-23867"/>
</dbReference>
<dbReference type="PDB" id="8OIY">
    <property type="method" value="X-ray"/>
    <property type="resolution" value="2.10 A"/>
    <property type="chains" value="A/B/C/D/E/F=14217-14319"/>
</dbReference>
<dbReference type="PDB" id="8OMW">
    <property type="method" value="X-ray"/>
    <property type="resolution" value="1.05 A"/>
    <property type="chains" value="A=16525-16630"/>
</dbReference>
<dbReference type="PDB" id="8OQ9">
    <property type="method" value="X-ray"/>
    <property type="resolution" value="1.65 A"/>
    <property type="chains" value="A/B/C=21497-21598"/>
</dbReference>
<dbReference type="PDB" id="8ORL">
    <property type="method" value="X-ray"/>
    <property type="resolution" value="1.43 A"/>
    <property type="chains" value="A/B/C=21497-21598"/>
</dbReference>
<dbReference type="PDB" id="8OS3">
    <property type="method" value="X-ray"/>
    <property type="resolution" value="1.68 A"/>
    <property type="chains" value="A=15210-15313"/>
</dbReference>
<dbReference type="PDB" id="8OSD">
    <property type="method" value="X-ray"/>
    <property type="resolution" value="1.70 A"/>
    <property type="chains" value="A/B=20511-20616"/>
</dbReference>
<dbReference type="PDB" id="8OT5">
    <property type="method" value="X-ray"/>
    <property type="resolution" value="1.56 A"/>
    <property type="chains" value="A/B/C/D/E/F=25430-25531"/>
</dbReference>
<dbReference type="PDB" id="8OTY">
    <property type="method" value="X-ray"/>
    <property type="resolution" value="1.90 A"/>
    <property type="chains" value="A/B/C/D=26124-26224"/>
</dbReference>
<dbReference type="PDB" id="8OVU">
    <property type="method" value="X-ray"/>
    <property type="resolution" value="1.95 A"/>
    <property type="chains" value="A/B=3500-3598"/>
</dbReference>
<dbReference type="PDB" id="8P35">
    <property type="method" value="X-ray"/>
    <property type="resolution" value="2.20 A"/>
    <property type="chains" value="A/B/C/D/E/F=3500-3598"/>
</dbReference>
<dbReference type="PDBsum" id="1BPV"/>
<dbReference type="PDBsum" id="1G1C"/>
<dbReference type="PDBsum" id="1NCT"/>
<dbReference type="PDBsum" id="1NCU"/>
<dbReference type="PDBsum" id="1TIT"/>
<dbReference type="PDBsum" id="1TIU"/>
<dbReference type="PDBsum" id="1TKI"/>
<dbReference type="PDBsum" id="1TNM"/>
<dbReference type="PDBsum" id="1TNN"/>
<dbReference type="PDBsum" id="1WAA"/>
<dbReference type="PDBsum" id="1YA5"/>
<dbReference type="PDBsum" id="2A38"/>
<dbReference type="PDBsum" id="2BK8"/>
<dbReference type="PDBsum" id="2F8V"/>
<dbReference type="PDBsum" id="2ILL"/>
<dbReference type="PDBsum" id="2J8H"/>
<dbReference type="PDBsum" id="2J8O"/>
<dbReference type="PDBsum" id="2NZI"/>
<dbReference type="PDBsum" id="2RQ8"/>
<dbReference type="PDBsum" id="2WP3"/>
<dbReference type="PDBsum" id="2WWK"/>
<dbReference type="PDBsum" id="2WWM"/>
<dbReference type="PDBsum" id="2Y9R"/>
<dbReference type="PDBsum" id="3B43"/>
<dbReference type="PDBsum" id="3KNB"/>
<dbReference type="PDBsum" id="3LCY"/>
<dbReference type="PDBsum" id="3LPW"/>
<dbReference type="PDBsum" id="3PUC"/>
<dbReference type="PDBsum" id="3Q5O"/>
<dbReference type="PDBsum" id="3QP3"/>
<dbReference type="PDBsum" id="4C4K"/>
<dbReference type="PDBsum" id="4JNW"/>
<dbReference type="PDBsum" id="4O00"/>
<dbReference type="PDBsum" id="4QEG"/>
<dbReference type="PDBsum" id="4UOW"/>
<dbReference type="PDBsum" id="5BS0"/>
<dbReference type="PDBsum" id="5JDD"/>
<dbReference type="PDBsum" id="5JDE"/>
<dbReference type="PDBsum" id="5JDJ"/>
<dbReference type="PDBsum" id="5JOE"/>
<dbReference type="PDBsum" id="6DL4"/>
<dbReference type="PDBsum" id="6FWX"/>
<dbReference type="PDBsum" id="6H4L"/>
<dbReference type="PDBsum" id="6HCI"/>
<dbReference type="PDBsum" id="6I0Y"/>
<dbReference type="PDBsum" id="6SDB"/>
<dbReference type="PDBsum" id="6YGN"/>
<dbReference type="PDBsum" id="7AHS"/>
<dbReference type="PDBsum" id="7NIP"/>
<dbReference type="PDBsum" id="8BNQ"/>
<dbReference type="PDBsum" id="8BVO"/>
<dbReference type="PDBsum" id="8BW6"/>
<dbReference type="PDBsum" id="8BXR"/>
<dbReference type="PDBsum" id="8G4L"/>
<dbReference type="PDBsum" id="8OIY"/>
<dbReference type="PDBsum" id="8OMW"/>
<dbReference type="PDBsum" id="8OQ9"/>
<dbReference type="PDBsum" id="8ORL"/>
<dbReference type="PDBsum" id="8OS3"/>
<dbReference type="PDBsum" id="8OSD"/>
<dbReference type="PDBsum" id="8OT5"/>
<dbReference type="PDBsum" id="8OTY"/>
<dbReference type="PDBsum" id="8OVU"/>
<dbReference type="PDBsum" id="8P35"/>
<dbReference type="EMDB" id="EMD-0322"/>
<dbReference type="EMDB" id="EMD-29722"/>
<dbReference type="SASBDB" id="Q8WZ42"/>
<dbReference type="SMR" id="Q8WZ42"/>
<dbReference type="BioGRID" id="113124">
    <property type="interactions" value="304"/>
</dbReference>
<dbReference type="ComplexPortal" id="CPX-101">
    <property type="entry name" value="Titin-Telethonin complex"/>
</dbReference>
<dbReference type="CORUM" id="Q8WZ42"/>
<dbReference type="DIP" id="DIP-33449N"/>
<dbReference type="FunCoup" id="Q8WZ42">
    <property type="interactions" value="665"/>
</dbReference>
<dbReference type="IntAct" id="Q8WZ42">
    <property type="interactions" value="156"/>
</dbReference>
<dbReference type="MINT" id="Q8WZ42"/>
<dbReference type="STRING" id="9606.ENSP00000467141"/>
<dbReference type="MoonDB" id="Q8WZ42">
    <property type="type" value="Predicted"/>
</dbReference>
<dbReference type="CarbonylDB" id="Q8WZ42"/>
<dbReference type="GlyCosmos" id="Q8WZ42">
    <property type="glycosylation" value="11 sites, 2 glycans"/>
</dbReference>
<dbReference type="GlyGen" id="Q8WZ42">
    <property type="glycosylation" value="40 sites, 3 O-linked glycans (23 sites)"/>
</dbReference>
<dbReference type="iPTMnet" id="Q8WZ42"/>
<dbReference type="MetOSite" id="Q8WZ42"/>
<dbReference type="PhosphoSitePlus" id="Q8WZ42"/>
<dbReference type="SwissPalm" id="Q8WZ42"/>
<dbReference type="BioMuta" id="TTN"/>
<dbReference type="jPOST" id="Q8WZ42"/>
<dbReference type="MassIVE" id="Q8WZ42"/>
<dbReference type="PaxDb" id="9606-ENSP00000467141"/>
<dbReference type="PeptideAtlas" id="Q8WZ42"/>
<dbReference type="ProteomicsDB" id="75209">
    <molecule id="Q8WZ42-1"/>
</dbReference>
<dbReference type="ProteomicsDB" id="75210">
    <molecule id="Q8WZ42-10"/>
</dbReference>
<dbReference type="ProteomicsDB" id="75211">
    <molecule id="Q8WZ42-11"/>
</dbReference>
<dbReference type="ProteomicsDB" id="75212">
    <molecule id="Q8WZ42-2"/>
</dbReference>
<dbReference type="ProteomicsDB" id="75213">
    <molecule id="Q8WZ42-3"/>
</dbReference>
<dbReference type="ProteomicsDB" id="75214">
    <molecule id="Q8WZ42-4"/>
</dbReference>
<dbReference type="ProteomicsDB" id="75215">
    <molecule id="Q8WZ42-5"/>
</dbReference>
<dbReference type="ProteomicsDB" id="75216">
    <molecule id="Q8WZ42-6"/>
</dbReference>
<dbReference type="ProteomicsDB" id="75217">
    <molecule id="Q8WZ42-7"/>
</dbReference>
<dbReference type="ProteomicsDB" id="75218">
    <molecule id="Q8WZ42-8"/>
</dbReference>
<dbReference type="ProteomicsDB" id="75219">
    <molecule id="Q8WZ42-9"/>
</dbReference>
<dbReference type="Pumba" id="Q8WZ42"/>
<dbReference type="ABCD" id="Q8WZ42">
    <property type="antibodies" value="2 sequenced antibodies"/>
</dbReference>
<dbReference type="Antibodypedia" id="2056">
    <property type="antibodies" value="211 antibodies from 28 providers"/>
</dbReference>
<dbReference type="DNASU" id="7273"/>
<dbReference type="Ensembl" id="ENST00000342992.11">
    <molecule id="Q8WZ42-11"/>
    <property type="protein sequence ID" value="ENSP00000343764.6"/>
    <property type="gene ID" value="ENSG00000155657.29"/>
</dbReference>
<dbReference type="Ensembl" id="ENST00000359218.11">
    <molecule id="Q8WZ42-10"/>
    <property type="protein sequence ID" value="ENSP00000352154.5"/>
    <property type="gene ID" value="ENSG00000155657.29"/>
</dbReference>
<dbReference type="Ensembl" id="ENST00000360870.10">
    <molecule id="Q8WZ42-6"/>
    <property type="protein sequence ID" value="ENSP00000354117.4"/>
    <property type="gene ID" value="ENSG00000155657.29"/>
</dbReference>
<dbReference type="Ensembl" id="ENST00000412264.2">
    <molecule id="Q8WZ42-12"/>
    <property type="protein sequence ID" value="ENSP00000394672.2"/>
    <property type="gene ID" value="ENSG00000155657.29"/>
</dbReference>
<dbReference type="Ensembl" id="ENST00000460472.6">
    <molecule id="Q8WZ42-3"/>
    <property type="protein sequence ID" value="ENSP00000434586.1"/>
    <property type="gene ID" value="ENSG00000155657.29"/>
</dbReference>
<dbReference type="Ensembl" id="ENST00000589042.5">
    <molecule id="Q8WZ42-12"/>
    <property type="protein sequence ID" value="ENSP00000467141.1"/>
    <property type="gene ID" value="ENSG00000155657.29"/>
</dbReference>
<dbReference type="Ensembl" id="ENST00000591111.5">
    <molecule id="Q8WZ42-1"/>
    <property type="protein sequence ID" value="ENSP00000465570.1"/>
    <property type="gene ID" value="ENSG00000155657.29"/>
</dbReference>
<dbReference type="GeneID" id="7273"/>
<dbReference type="KEGG" id="hsa:7273"/>
<dbReference type="MANE-Select" id="ENST00000589042.5">
    <molecule id="Q8WZ42-12"/>
    <property type="protein sequence ID" value="ENSP00000467141.1"/>
    <property type="RefSeq nucleotide sequence ID" value="NM_001267550.2"/>
    <property type="RefSeq protein sequence ID" value="NP_001254479.2"/>
</dbReference>
<dbReference type="UCSC" id="uc002unb.4">
    <molecule id="Q8WZ42-1"/>
    <property type="organism name" value="human"/>
</dbReference>
<dbReference type="UCSC" id="uc031rqc.3">
    <property type="organism name" value="human"/>
</dbReference>
<dbReference type="AGR" id="HGNC:12403"/>
<dbReference type="CTD" id="7273"/>
<dbReference type="DisGeNET" id="7273"/>
<dbReference type="GeneCards" id="TTN"/>
<dbReference type="GeneReviews" id="TTN"/>
<dbReference type="HGNC" id="HGNC:12403">
    <property type="gene designation" value="TTN"/>
</dbReference>
<dbReference type="HPA" id="ENSG00000155657">
    <property type="expression patterns" value="Tissue enhanced (heart muscle, skeletal muscle, tongue)"/>
</dbReference>
<dbReference type="MalaCards" id="TTN"/>
<dbReference type="MIM" id="188840">
    <property type="type" value="gene"/>
</dbReference>
<dbReference type="MIM" id="600334">
    <property type="type" value="phenotype"/>
</dbReference>
<dbReference type="MIM" id="603689">
    <property type="type" value="phenotype"/>
</dbReference>
<dbReference type="MIM" id="604145">
    <property type="type" value="phenotype"/>
</dbReference>
<dbReference type="MIM" id="608807">
    <property type="type" value="phenotype"/>
</dbReference>
<dbReference type="MIM" id="611705">
    <property type="type" value="phenotype"/>
</dbReference>
<dbReference type="MIM" id="613765">
    <property type="type" value="phenotype"/>
</dbReference>
<dbReference type="neXtProt" id="NX_Q8WZ42"/>
<dbReference type="OpenTargets" id="ENSG00000155657"/>
<dbReference type="Orphanet" id="169186">
    <property type="disease" value="Autosomal recessive centronuclear myopathy"/>
</dbReference>
<dbReference type="Orphanet" id="466921">
    <property type="disease" value="Childhood-onset progressive contractures-limb-girdle weakness-muscle dystrophy syndrome"/>
</dbReference>
<dbReference type="Orphanet" id="324604">
    <property type="disease" value="Classic multiminicore myopathy"/>
</dbReference>
<dbReference type="Orphanet" id="289377">
    <property type="disease" value="Early-onset myopathy with fatal cardiomyopathy"/>
</dbReference>
<dbReference type="Orphanet" id="334">
    <property type="disease" value="Familial atrial fibrillation"/>
</dbReference>
<dbReference type="Orphanet" id="154">
    <property type="disease" value="Familial isolated dilated cardiomyopathy"/>
</dbReference>
<dbReference type="Orphanet" id="178464">
    <property type="disease" value="Hereditary myopathy with early respiratory failure"/>
</dbReference>
<dbReference type="Orphanet" id="293888">
    <property type="disease" value="Inherited isolated arrhythmogenic cardiomyopathy, dominant-left variant"/>
</dbReference>
<dbReference type="Orphanet" id="293910">
    <property type="disease" value="Inherited isolated arrhythmogenic cardiomyopathy, dominant-right variant"/>
</dbReference>
<dbReference type="Orphanet" id="293899">
    <property type="disease" value="Inherited isolated arrhythmogenic ventricular dysplasia, biventricular variant"/>
</dbReference>
<dbReference type="Orphanet" id="609">
    <property type="disease" value="Tibial muscular dystrophy"/>
</dbReference>
<dbReference type="Orphanet" id="140922">
    <property type="disease" value="Titin-related limb-girdle muscular dystrophy R10"/>
</dbReference>
<dbReference type="PharmGKB" id="PA37067"/>
<dbReference type="VEuPathDB" id="HostDB:ENSG00000155657"/>
<dbReference type="eggNOG" id="KOG0613">
    <property type="taxonomic scope" value="Eukaryota"/>
</dbReference>
<dbReference type="eggNOG" id="KOG4475">
    <property type="taxonomic scope" value="Eukaryota"/>
</dbReference>
<dbReference type="GeneTree" id="ENSGT01110000267173"/>
<dbReference type="HOGENOM" id="CLU_000001_1_0_1"/>
<dbReference type="InParanoid" id="Q8WZ42"/>
<dbReference type="OMA" id="TSSWPEY"/>
<dbReference type="OrthoDB" id="5969272at2759"/>
<dbReference type="PAN-GO" id="Q8WZ42">
    <property type="GO annotations" value="0 GO annotations based on evolutionary models"/>
</dbReference>
<dbReference type="TreeFam" id="TF316477"/>
<dbReference type="BRENDA" id="2.7.11.1">
    <property type="organism ID" value="2681"/>
</dbReference>
<dbReference type="PathwayCommons" id="Q8WZ42"/>
<dbReference type="Reactome" id="R-HSA-114608">
    <property type="pathway name" value="Platelet degranulation"/>
</dbReference>
<dbReference type="Reactome" id="R-HSA-390522">
    <property type="pathway name" value="Striated Muscle Contraction"/>
</dbReference>
<dbReference type="SignaLink" id="Q8WZ42"/>
<dbReference type="SIGNOR" id="Q8WZ42"/>
<dbReference type="BioGRID-ORCS" id="7273">
    <property type="hits" value="10 hits in 1181 CRISPR screens"/>
</dbReference>
<dbReference type="CD-CODE" id="232F8A39">
    <property type="entry name" value="P-body"/>
</dbReference>
<dbReference type="ChiTaRS" id="TTN">
    <property type="organism name" value="human"/>
</dbReference>
<dbReference type="EvolutionaryTrace" id="Q8WZ42"/>
<dbReference type="GeneWiki" id="Titin"/>
<dbReference type="GenomeRNAi" id="7273"/>
<dbReference type="Pharos" id="Q8WZ42">
    <property type="development level" value="Tbio"/>
</dbReference>
<dbReference type="PRO" id="PR:Q8WZ42"/>
<dbReference type="Proteomes" id="UP000005640">
    <property type="component" value="Chromosome 2"/>
</dbReference>
<dbReference type="Bgee" id="ENSG00000155657">
    <property type="expression patterns" value="Expressed in gluteal muscle and 163 other cell types or tissues"/>
</dbReference>
<dbReference type="ExpressionAtlas" id="Q8WZ42">
    <property type="expression patterns" value="baseline and differential"/>
</dbReference>
<dbReference type="GO" id="GO:0000794">
    <property type="term" value="C:condensed nuclear chromosome"/>
    <property type="evidence" value="ECO:0000314"/>
    <property type="project" value="BHF-UCL"/>
</dbReference>
<dbReference type="GO" id="GO:0005829">
    <property type="term" value="C:cytosol"/>
    <property type="evidence" value="ECO:0000304"/>
    <property type="project" value="Reactome"/>
</dbReference>
<dbReference type="GO" id="GO:0070062">
    <property type="term" value="C:extracellular exosome"/>
    <property type="evidence" value="ECO:0007005"/>
    <property type="project" value="UniProtKB"/>
</dbReference>
<dbReference type="GO" id="GO:0005576">
    <property type="term" value="C:extracellular region"/>
    <property type="evidence" value="ECO:0000304"/>
    <property type="project" value="Reactome"/>
</dbReference>
<dbReference type="GO" id="GO:0031674">
    <property type="term" value="C:I band"/>
    <property type="evidence" value="ECO:0000314"/>
    <property type="project" value="BHF-UCL"/>
</dbReference>
<dbReference type="GO" id="GO:0031430">
    <property type="term" value="C:M band"/>
    <property type="evidence" value="ECO:0000314"/>
    <property type="project" value="BHF-UCL"/>
</dbReference>
<dbReference type="GO" id="GO:0005865">
    <property type="term" value="C:striated muscle thin filament"/>
    <property type="evidence" value="ECO:0000314"/>
    <property type="project" value="BHF-UCL"/>
</dbReference>
<dbReference type="GO" id="GO:1990733">
    <property type="term" value="C:titin-telethonin complex"/>
    <property type="evidence" value="ECO:0000353"/>
    <property type="project" value="ComplexPortal"/>
</dbReference>
<dbReference type="GO" id="GO:0030018">
    <property type="term" value="C:Z disc"/>
    <property type="evidence" value="ECO:0000314"/>
    <property type="project" value="BHF-UCL"/>
</dbReference>
<dbReference type="GO" id="GO:0051015">
    <property type="term" value="F:actin filament binding"/>
    <property type="evidence" value="ECO:0000314"/>
    <property type="project" value="BHF-UCL"/>
</dbReference>
<dbReference type="GO" id="GO:0042805">
    <property type="term" value="F:actinin binding"/>
    <property type="evidence" value="ECO:0000314"/>
    <property type="project" value="BHF-UCL"/>
</dbReference>
<dbReference type="GO" id="GO:0005524">
    <property type="term" value="F:ATP binding"/>
    <property type="evidence" value="ECO:0007669"/>
    <property type="project" value="UniProtKB-KW"/>
</dbReference>
<dbReference type="GO" id="GO:0005509">
    <property type="term" value="F:calcium ion binding"/>
    <property type="evidence" value="ECO:0000314"/>
    <property type="project" value="BHF-UCL"/>
</dbReference>
<dbReference type="GO" id="GO:0005516">
    <property type="term" value="F:calmodulin binding"/>
    <property type="evidence" value="ECO:0000353"/>
    <property type="project" value="BHF-UCL"/>
</dbReference>
<dbReference type="GO" id="GO:0019899">
    <property type="term" value="F:enzyme binding"/>
    <property type="evidence" value="ECO:0000353"/>
    <property type="project" value="UniProtKB"/>
</dbReference>
<dbReference type="GO" id="GO:0042802">
    <property type="term" value="F:identical protein binding"/>
    <property type="evidence" value="ECO:0000353"/>
    <property type="project" value="IntAct"/>
</dbReference>
<dbReference type="GO" id="GO:0051371">
    <property type="term" value="F:muscle alpha-actinin binding"/>
    <property type="evidence" value="ECO:0000353"/>
    <property type="project" value="BHF-UCL"/>
</dbReference>
<dbReference type="GO" id="GO:0002020">
    <property type="term" value="F:protease binding"/>
    <property type="evidence" value="ECO:0000353"/>
    <property type="project" value="UniProtKB"/>
</dbReference>
<dbReference type="GO" id="GO:0042803">
    <property type="term" value="F:protein homodimerization activity"/>
    <property type="evidence" value="ECO:0000353"/>
    <property type="project" value="BHF-UCL"/>
</dbReference>
<dbReference type="GO" id="GO:0004672">
    <property type="term" value="F:protein kinase activity"/>
    <property type="evidence" value="ECO:0007669"/>
    <property type="project" value="InterPro"/>
</dbReference>
<dbReference type="GO" id="GO:0019901">
    <property type="term" value="F:protein kinase binding"/>
    <property type="evidence" value="ECO:0000353"/>
    <property type="project" value="BHF-UCL"/>
</dbReference>
<dbReference type="GO" id="GO:0019887">
    <property type="term" value="F:protein kinase regulator activity"/>
    <property type="evidence" value="ECO:0000315"/>
    <property type="project" value="BHF-UCL"/>
</dbReference>
<dbReference type="GO" id="GO:0106310">
    <property type="term" value="F:protein serine kinase activity"/>
    <property type="evidence" value="ECO:0007669"/>
    <property type="project" value="RHEA"/>
</dbReference>
<dbReference type="GO" id="GO:0004674">
    <property type="term" value="F:protein serine/threonine kinase activity"/>
    <property type="evidence" value="ECO:0000314"/>
    <property type="project" value="UniProtKB"/>
</dbReference>
<dbReference type="GO" id="GO:0004713">
    <property type="term" value="F:protein tyrosine kinase activity"/>
    <property type="evidence" value="ECO:0000314"/>
    <property type="project" value="MGI"/>
</dbReference>
<dbReference type="GO" id="GO:0008307">
    <property type="term" value="F:structural constituent of muscle"/>
    <property type="evidence" value="ECO:0000315"/>
    <property type="project" value="BHF-UCL"/>
</dbReference>
<dbReference type="GO" id="GO:0097493">
    <property type="term" value="F:structural molecule activity conferring elasticity"/>
    <property type="evidence" value="ECO:0000314"/>
    <property type="project" value="BHF-UCL"/>
</dbReference>
<dbReference type="GO" id="GO:0031433">
    <property type="term" value="F:telethonin binding"/>
    <property type="evidence" value="ECO:0000353"/>
    <property type="project" value="BHF-UCL"/>
</dbReference>
<dbReference type="GO" id="GO:0055013">
    <property type="term" value="P:cardiac muscle cell development"/>
    <property type="evidence" value="ECO:0000315"/>
    <property type="project" value="BHF-UCL"/>
</dbReference>
<dbReference type="GO" id="GO:0060048">
    <property type="term" value="P:cardiac muscle contraction"/>
    <property type="evidence" value="ECO:0000315"/>
    <property type="project" value="BHF-UCL"/>
</dbReference>
<dbReference type="GO" id="GO:0003300">
    <property type="term" value="P:cardiac muscle hypertrophy"/>
    <property type="evidence" value="ECO:0000315"/>
    <property type="project" value="BHF-UCL"/>
</dbReference>
<dbReference type="GO" id="GO:0055008">
    <property type="term" value="P:cardiac muscle tissue morphogenesis"/>
    <property type="evidence" value="ECO:0000315"/>
    <property type="project" value="BHF-UCL"/>
</dbReference>
<dbReference type="GO" id="GO:0055003">
    <property type="term" value="P:cardiac myofibril assembly"/>
    <property type="evidence" value="ECO:0000315"/>
    <property type="project" value="BHF-UCL"/>
</dbReference>
<dbReference type="GO" id="GO:0035995">
    <property type="term" value="P:detection of muscle stretch"/>
    <property type="evidence" value="ECO:0000314"/>
    <property type="project" value="MGI"/>
</dbReference>
<dbReference type="GO" id="GO:0007076">
    <property type="term" value="P:mitotic chromosome condensation"/>
    <property type="evidence" value="ECO:0000270"/>
    <property type="project" value="BHF-UCL"/>
</dbReference>
<dbReference type="GO" id="GO:0006936">
    <property type="term" value="P:muscle contraction"/>
    <property type="evidence" value="ECO:0000304"/>
    <property type="project" value="UniProtKB"/>
</dbReference>
<dbReference type="GO" id="GO:0030049">
    <property type="term" value="P:muscle filament sliding"/>
    <property type="evidence" value="ECO:0000303"/>
    <property type="project" value="ComplexPortal"/>
</dbReference>
<dbReference type="GO" id="GO:0010628">
    <property type="term" value="P:positive regulation of gene expression"/>
    <property type="evidence" value="ECO:0000315"/>
    <property type="project" value="CAFA"/>
</dbReference>
<dbReference type="GO" id="GO:0050714">
    <property type="term" value="P:positive regulation of protein secretion"/>
    <property type="evidence" value="ECO:0000315"/>
    <property type="project" value="CAFA"/>
</dbReference>
<dbReference type="GO" id="GO:0010737">
    <property type="term" value="P:protein kinase A signaling"/>
    <property type="evidence" value="ECO:0000315"/>
    <property type="project" value="CAFA"/>
</dbReference>
<dbReference type="GO" id="GO:0051592">
    <property type="term" value="P:response to calcium ion"/>
    <property type="evidence" value="ECO:0000314"/>
    <property type="project" value="BHF-UCL"/>
</dbReference>
<dbReference type="GO" id="GO:0045214">
    <property type="term" value="P:sarcomere organization"/>
    <property type="evidence" value="ECO:0000315"/>
    <property type="project" value="BHF-UCL"/>
</dbReference>
<dbReference type="GO" id="GO:0048769">
    <property type="term" value="P:sarcomerogenesis"/>
    <property type="evidence" value="ECO:0000315"/>
    <property type="project" value="BHF-UCL"/>
</dbReference>
<dbReference type="GO" id="GO:0003009">
    <property type="term" value="P:skeletal muscle contraction"/>
    <property type="evidence" value="ECO:0000303"/>
    <property type="project" value="ComplexPortal"/>
</dbReference>
<dbReference type="GO" id="GO:0030241">
    <property type="term" value="P:skeletal muscle myosin thick filament assembly"/>
    <property type="evidence" value="ECO:0000315"/>
    <property type="project" value="BHF-UCL"/>
</dbReference>
<dbReference type="GO" id="GO:0030240">
    <property type="term" value="P:skeletal muscle thin filament assembly"/>
    <property type="evidence" value="ECO:0000315"/>
    <property type="project" value="BHF-UCL"/>
</dbReference>
<dbReference type="GO" id="GO:0006941">
    <property type="term" value="P:striated muscle contraction"/>
    <property type="evidence" value="ECO:0000304"/>
    <property type="project" value="UniProtKB"/>
</dbReference>
<dbReference type="CDD" id="cd00063">
    <property type="entry name" value="FN3"/>
    <property type="match status" value="132"/>
</dbReference>
<dbReference type="CDD" id="cd00096">
    <property type="entry name" value="Ig"/>
    <property type="match status" value="31"/>
</dbReference>
<dbReference type="CDD" id="cd05748">
    <property type="entry name" value="Ig_Titin_like"/>
    <property type="match status" value="28"/>
</dbReference>
<dbReference type="CDD" id="cd20974">
    <property type="entry name" value="IgI_1_Titin_Z1z2-like"/>
    <property type="match status" value="2"/>
</dbReference>
<dbReference type="CDD" id="cd20972">
    <property type="entry name" value="IgI_2_Titin_Z1z2-like"/>
    <property type="match status" value="1"/>
</dbReference>
<dbReference type="CDD" id="cd20951">
    <property type="entry name" value="IgI_titin_I1-like"/>
    <property type="match status" value="1"/>
</dbReference>
<dbReference type="CDD" id="cd05747">
    <property type="entry name" value="IgI_Titin_like"/>
    <property type="match status" value="1"/>
</dbReference>
<dbReference type="CDD" id="cd20927">
    <property type="entry name" value="IgI_Titin_M1-like"/>
    <property type="match status" value="1"/>
</dbReference>
<dbReference type="CDD" id="cd14104">
    <property type="entry name" value="STKc_Titin"/>
    <property type="match status" value="1"/>
</dbReference>
<dbReference type="DisProt" id="DP00072"/>
<dbReference type="FunFam" id="2.60.40.10:FF:000022">
    <property type="entry name" value="Cardiac titin"/>
    <property type="match status" value="44"/>
</dbReference>
<dbReference type="FunFam" id="2.60.40.10:FF:000800">
    <property type="entry name" value="Cardiac titin"/>
    <property type="match status" value="1"/>
</dbReference>
<dbReference type="FunFam" id="2.60.40.10:FF:000345">
    <property type="entry name" value="Muscle M-line assembly protein unc-89"/>
    <property type="match status" value="1"/>
</dbReference>
<dbReference type="FunFam" id="2.60.40.10:FF:001284">
    <property type="entry name" value="Myomesin 2"/>
    <property type="match status" value="1"/>
</dbReference>
<dbReference type="FunFam" id="2.60.40.10:FF:000147">
    <property type="entry name" value="Myosin light chain kinase"/>
    <property type="match status" value="2"/>
</dbReference>
<dbReference type="FunFam" id="2.60.40.10:FF:000107">
    <property type="entry name" value="Myosin, light chain kinase a"/>
    <property type="match status" value="2"/>
</dbReference>
<dbReference type="FunFam" id="2.60.40.10:FF:000031">
    <property type="entry name" value="Myosin-binding protein C, slow type"/>
    <property type="match status" value="7"/>
</dbReference>
<dbReference type="FunFam" id="2.60.40.10:FF:001867">
    <property type="entry name" value="Titin"/>
    <property type="match status" value="1"/>
</dbReference>
<dbReference type="FunFam" id="2.60.40.10:FF:001911">
    <property type="entry name" value="Titin"/>
    <property type="match status" value="1"/>
</dbReference>
<dbReference type="FunFam" id="1.10.510.10:FF:000329">
    <property type="entry name" value="Titin a"/>
    <property type="match status" value="1"/>
</dbReference>
<dbReference type="FunFam" id="2.60.40.10:FF:000002">
    <property type="entry name" value="Titin a"/>
    <property type="match status" value="32"/>
</dbReference>
<dbReference type="FunFam" id="2.60.40.10:FF:000112">
    <property type="entry name" value="Titin a"/>
    <property type="match status" value="8"/>
</dbReference>
<dbReference type="FunFam" id="2.60.40.10:FF:000135">
    <property type="entry name" value="Titin a"/>
    <property type="match status" value="7"/>
</dbReference>
<dbReference type="FunFam" id="2.60.40.10:FF:000160">
    <property type="entry name" value="Titin a"/>
    <property type="match status" value="1"/>
</dbReference>
<dbReference type="FunFam" id="2.60.40.10:FF:000547">
    <property type="entry name" value="Titin a"/>
    <property type="match status" value="2"/>
</dbReference>
<dbReference type="FunFam" id="2.60.40.10:FF:000672">
    <property type="entry name" value="Titin a"/>
    <property type="match status" value="1"/>
</dbReference>
<dbReference type="FunFam" id="2.60.40.10:FF:000673">
    <property type="entry name" value="Titin a"/>
    <property type="match status" value="1"/>
</dbReference>
<dbReference type="FunFam" id="2.60.40.10:FF:000811">
    <property type="entry name" value="Titin a"/>
    <property type="match status" value="1"/>
</dbReference>
<dbReference type="FunFam" id="2.60.40.10:FF:000867">
    <property type="entry name" value="Titin a"/>
    <property type="match status" value="1"/>
</dbReference>
<dbReference type="FunFam" id="2.60.40.10:FF:000891">
    <property type="entry name" value="Titin a"/>
    <property type="match status" value="1"/>
</dbReference>
<dbReference type="FunFam" id="2.60.40.10:FF:000900">
    <property type="entry name" value="Titin a"/>
    <property type="match status" value="1"/>
</dbReference>
<dbReference type="FunFam" id="2.60.40.10:FF:000981">
    <property type="entry name" value="Titin a"/>
    <property type="match status" value="1"/>
</dbReference>
<dbReference type="FunFam" id="2.60.40.10:FF:001200">
    <property type="entry name" value="Titin a"/>
    <property type="match status" value="1"/>
</dbReference>
<dbReference type="FunFam" id="2.60.40.10:FF:001399">
    <property type="entry name" value="Titin a"/>
    <property type="match status" value="1"/>
</dbReference>
<dbReference type="FunFam" id="2.60.40.10:FF:001400">
    <property type="entry name" value="Titin a"/>
    <property type="match status" value="1"/>
</dbReference>
<dbReference type="FunFam" id="2.60.40.10:FF:001459">
    <property type="entry name" value="Titin a"/>
    <property type="match status" value="1"/>
</dbReference>
<dbReference type="FunFam" id="2.60.40.10:FF:001500">
    <property type="entry name" value="Titin a"/>
    <property type="match status" value="1"/>
</dbReference>
<dbReference type="FunFam" id="2.60.40.10:FF:001579">
    <property type="entry name" value="Titin a"/>
    <property type="match status" value="1"/>
</dbReference>
<dbReference type="FunFam" id="2.60.40.10:FF:001697">
    <property type="entry name" value="Titin a"/>
    <property type="match status" value="1"/>
</dbReference>
<dbReference type="FunFam" id="3.30.200.20:FF:000286">
    <property type="entry name" value="Titin a"/>
    <property type="match status" value="1"/>
</dbReference>
<dbReference type="FunFam" id="2.60.40.10:FF:000011">
    <property type="entry name" value="Titin b"/>
    <property type="match status" value="11"/>
</dbReference>
<dbReference type="FunFam" id="2.60.40.10:FF:000629">
    <property type="entry name" value="Titin b"/>
    <property type="match status" value="1"/>
</dbReference>
<dbReference type="FunFam" id="2.60.40.10:FF:000635">
    <property type="entry name" value="Titin b"/>
    <property type="match status" value="1"/>
</dbReference>
<dbReference type="FunFam" id="2.60.40.10:FF:000779">
    <property type="entry name" value="Titin b"/>
    <property type="match status" value="1"/>
</dbReference>
<dbReference type="FunFam" id="2.60.40.10:FF:000833">
    <property type="entry name" value="Titin b"/>
    <property type="match status" value="1"/>
</dbReference>
<dbReference type="FunFam" id="2.60.40.10:FF:000859">
    <property type="entry name" value="Titin b"/>
    <property type="match status" value="1"/>
</dbReference>
<dbReference type="FunFam" id="2.60.40.10:FF:000864">
    <property type="entry name" value="Titin b"/>
    <property type="match status" value="1"/>
</dbReference>
<dbReference type="FunFam" id="2.60.40.10:FF:000901">
    <property type="entry name" value="Titin b"/>
    <property type="match status" value="1"/>
</dbReference>
<dbReference type="FunFam" id="2.60.40.10:FF:000980">
    <property type="entry name" value="Titin b"/>
    <property type="match status" value="1"/>
</dbReference>
<dbReference type="FunFam" id="2.60.40.10:FF:000986">
    <property type="entry name" value="Titin b"/>
    <property type="match status" value="1"/>
</dbReference>
<dbReference type="FunFam" id="2.60.40.10:FF:001115">
    <property type="entry name" value="Titin b"/>
    <property type="match status" value="1"/>
</dbReference>
<dbReference type="FunFam" id="2.60.40.10:FF:001190">
    <property type="entry name" value="Titin b"/>
    <property type="match status" value="1"/>
</dbReference>
<dbReference type="FunFam" id="2.60.40.10:FF:001477">
    <property type="entry name" value="Titin b"/>
    <property type="match status" value="1"/>
</dbReference>
<dbReference type="FunFam" id="2.60.40.10:FF:000034">
    <property type="entry name" value="Titin isoform A"/>
    <property type="match status" value="26"/>
</dbReference>
<dbReference type="FunFam" id="2.60.40.10:FF:000050">
    <property type="entry name" value="Titin isoform B"/>
    <property type="match status" value="8"/>
</dbReference>
<dbReference type="FunFam" id="2.60.40.10:FF:000003">
    <property type="entry name" value="Titin isoform E"/>
    <property type="match status" value="22"/>
</dbReference>
<dbReference type="FunFam" id="2.60.40.10:FF:000012">
    <property type="entry name" value="titin isoform X1"/>
    <property type="match status" value="26"/>
</dbReference>
<dbReference type="FunFam" id="2.60.40.10:FF:000073">
    <property type="entry name" value="titin isoform X1"/>
    <property type="match status" value="5"/>
</dbReference>
<dbReference type="FunFam" id="2.60.40.10:FF:000127">
    <property type="entry name" value="titin isoform X1"/>
    <property type="match status" value="4"/>
</dbReference>
<dbReference type="FunFam" id="2.60.40.10:FF:000148">
    <property type="entry name" value="titin isoform X1"/>
    <property type="match status" value="5"/>
</dbReference>
<dbReference type="FunFam" id="2.60.40.10:FF:000214">
    <property type="entry name" value="titin isoform X1"/>
    <property type="match status" value="7"/>
</dbReference>
<dbReference type="FunFam" id="2.60.40.10:FF:000218">
    <property type="entry name" value="titin isoform X1"/>
    <property type="match status" value="6"/>
</dbReference>
<dbReference type="FunFam" id="2.60.40.10:FF:000659">
    <property type="entry name" value="titin isoform X1"/>
    <property type="match status" value="1"/>
</dbReference>
<dbReference type="FunFam" id="2.60.40.10:FF:000697">
    <property type="entry name" value="titin isoform X1"/>
    <property type="match status" value="1"/>
</dbReference>
<dbReference type="FunFam" id="2.60.40.10:FF:000770">
    <property type="entry name" value="titin isoform X1"/>
    <property type="match status" value="1"/>
</dbReference>
<dbReference type="FunFam" id="2.60.40.10:FF:000792">
    <property type="entry name" value="titin isoform X1"/>
    <property type="match status" value="2"/>
</dbReference>
<dbReference type="FunFam" id="2.60.40.10:FF:000983">
    <property type="entry name" value="titin isoform X1"/>
    <property type="match status" value="1"/>
</dbReference>
<dbReference type="FunFam" id="2.60.40.10:FF:001003">
    <property type="entry name" value="titin isoform X1"/>
    <property type="match status" value="1"/>
</dbReference>
<dbReference type="FunFam" id="2.60.40.10:FF:001213">
    <property type="entry name" value="titin isoform X1"/>
    <property type="match status" value="1"/>
</dbReference>
<dbReference type="FunFam" id="2.60.40.10:FF:001229">
    <property type="entry name" value="titin isoform X1"/>
    <property type="match status" value="1"/>
</dbReference>
<dbReference type="FunFam" id="2.60.40.10:FF:001272">
    <property type="entry name" value="titin isoform X1"/>
    <property type="match status" value="1"/>
</dbReference>
<dbReference type="FunFam" id="2.60.40.10:FF:001327">
    <property type="entry name" value="titin isoform X1"/>
    <property type="match status" value="1"/>
</dbReference>
<dbReference type="FunFam" id="2.60.40.10:FF:001328">
    <property type="entry name" value="titin isoform X1"/>
    <property type="match status" value="1"/>
</dbReference>
<dbReference type="FunFam" id="2.60.40.10:FF:001342">
    <property type="entry name" value="titin isoform X1"/>
    <property type="match status" value="1"/>
</dbReference>
<dbReference type="FunFam" id="2.60.40.10:FF:001343">
    <property type="entry name" value="titin isoform X1"/>
    <property type="match status" value="1"/>
</dbReference>
<dbReference type="FunFam" id="2.60.40.10:FF:001344">
    <property type="entry name" value="titin isoform X1"/>
    <property type="match status" value="1"/>
</dbReference>
<dbReference type="FunFam" id="2.60.40.10:FF:001345">
    <property type="entry name" value="titin isoform X1"/>
    <property type="match status" value="1"/>
</dbReference>
<dbReference type="FunFam" id="2.60.40.10:FF:001350">
    <property type="entry name" value="titin isoform X1"/>
    <property type="match status" value="1"/>
</dbReference>
<dbReference type="FunFam" id="2.60.40.10:FF:001365">
    <property type="entry name" value="titin isoform X1"/>
    <property type="match status" value="1"/>
</dbReference>
<dbReference type="FunFam" id="2.60.40.10:FF:001367">
    <property type="entry name" value="titin isoform X1"/>
    <property type="match status" value="1"/>
</dbReference>
<dbReference type="FunFam" id="2.60.40.10:FF:001382">
    <property type="entry name" value="titin isoform X1"/>
    <property type="match status" value="1"/>
</dbReference>
<dbReference type="FunFam" id="2.60.40.10:FF:001385">
    <property type="entry name" value="titin isoform X1"/>
    <property type="match status" value="1"/>
</dbReference>
<dbReference type="FunFam" id="2.60.40.10:FF:001408">
    <property type="entry name" value="titin isoform X1"/>
    <property type="match status" value="1"/>
</dbReference>
<dbReference type="FunFam" id="2.60.40.10:FF:001430">
    <property type="entry name" value="titin isoform X1"/>
    <property type="match status" value="1"/>
</dbReference>
<dbReference type="FunFam" id="2.60.40.10:FF:001434">
    <property type="entry name" value="titin isoform X1"/>
    <property type="match status" value="1"/>
</dbReference>
<dbReference type="FunFam" id="2.60.40.10:FF:001454">
    <property type="entry name" value="titin isoform X1"/>
    <property type="match status" value="1"/>
</dbReference>
<dbReference type="FunFam" id="2.60.40.10:FF:001476">
    <property type="entry name" value="titin isoform X1"/>
    <property type="match status" value="1"/>
</dbReference>
<dbReference type="FunFam" id="2.60.40.10:FF:001544">
    <property type="entry name" value="titin isoform X1"/>
    <property type="match status" value="1"/>
</dbReference>
<dbReference type="FunFam" id="2.60.40.10:FF:001581">
    <property type="entry name" value="titin isoform X1"/>
    <property type="match status" value="1"/>
</dbReference>
<dbReference type="FunFam" id="2.60.40.10:FF:001610">
    <property type="entry name" value="titin isoform X1"/>
    <property type="match status" value="1"/>
</dbReference>
<dbReference type="FunFam" id="2.60.40.10:FF:001612">
    <property type="entry name" value="titin isoform X1"/>
    <property type="match status" value="1"/>
</dbReference>
<dbReference type="FunFam" id="2.60.40.10:FF:001663">
    <property type="entry name" value="titin isoform X1"/>
    <property type="match status" value="1"/>
</dbReference>
<dbReference type="FunFam" id="2.60.40.10:FF:000714">
    <property type="entry name" value="Titin novex-3"/>
    <property type="match status" value="3"/>
</dbReference>
<dbReference type="FunFam" id="2.60.40.10:FF:001082">
    <property type="entry name" value="Titin novex-3"/>
    <property type="match status" value="1"/>
</dbReference>
<dbReference type="FunFam" id="2.60.40.10:FF:001089">
    <property type="entry name" value="Titin novex-3"/>
    <property type="match status" value="1"/>
</dbReference>
<dbReference type="FunFam" id="2.60.40.10:FF:001098">
    <property type="entry name" value="Titin novex-3"/>
    <property type="match status" value="1"/>
</dbReference>
<dbReference type="FunFam" id="2.60.40.10:FF:001116">
    <property type="entry name" value="Titin novex-3"/>
    <property type="match status" value="1"/>
</dbReference>
<dbReference type="FunFam" id="2.60.40.10:FF:001804">
    <property type="entry name" value="Titin, isoform CRA_a"/>
    <property type="match status" value="1"/>
</dbReference>
<dbReference type="FunFam" id="2.60.40.10:FF:001844">
    <property type="entry name" value="Titin, isoform CRA_a"/>
    <property type="match status" value="1"/>
</dbReference>
<dbReference type="FunFam" id="2.60.40.10:FF:002231">
    <property type="entry name" value="Titin, isoform CRA_a"/>
    <property type="match status" value="1"/>
</dbReference>
<dbReference type="FunFam" id="2.60.40.10:FF:002123">
    <property type="entry name" value="Titin, tandem duplicate 1"/>
    <property type="match status" value="1"/>
</dbReference>
<dbReference type="Gene3D" id="2.60.40.10">
    <property type="entry name" value="Immunoglobulins"/>
    <property type="match status" value="299"/>
</dbReference>
<dbReference type="Gene3D" id="3.30.200.20">
    <property type="entry name" value="Phosphorylase Kinase, domain 1"/>
    <property type="match status" value="1"/>
</dbReference>
<dbReference type="Gene3D" id="1.10.510.10">
    <property type="entry name" value="Transferase(Phosphotransferase) domain 1"/>
    <property type="match status" value="1"/>
</dbReference>
<dbReference type="InterPro" id="IPR003961">
    <property type="entry name" value="FN3_dom"/>
</dbReference>
<dbReference type="InterPro" id="IPR036116">
    <property type="entry name" value="FN3_sf"/>
</dbReference>
<dbReference type="InterPro" id="IPR007110">
    <property type="entry name" value="Ig-like_dom"/>
</dbReference>
<dbReference type="InterPro" id="IPR036179">
    <property type="entry name" value="Ig-like_dom_sf"/>
</dbReference>
<dbReference type="InterPro" id="IPR013783">
    <property type="entry name" value="Ig-like_fold"/>
</dbReference>
<dbReference type="InterPro" id="IPR013098">
    <property type="entry name" value="Ig_I-set"/>
</dbReference>
<dbReference type="InterPro" id="IPR003599">
    <property type="entry name" value="Ig_sub"/>
</dbReference>
<dbReference type="InterPro" id="IPR003598">
    <property type="entry name" value="Ig_sub2"/>
</dbReference>
<dbReference type="InterPro" id="IPR013106">
    <property type="entry name" value="Ig_V-set"/>
</dbReference>
<dbReference type="InterPro" id="IPR011009">
    <property type="entry name" value="Kinase-like_dom_sf"/>
</dbReference>
<dbReference type="InterPro" id="IPR040849">
    <property type="entry name" value="MyBP-C_THB"/>
</dbReference>
<dbReference type="InterPro" id="IPR004168">
    <property type="entry name" value="PPAK_motif"/>
</dbReference>
<dbReference type="InterPro" id="IPR000719">
    <property type="entry name" value="Prot_kinase_dom"/>
</dbReference>
<dbReference type="InterPro" id="IPR015129">
    <property type="entry name" value="Titin_Z_rpt"/>
</dbReference>
<dbReference type="InterPro" id="IPR008266">
    <property type="entry name" value="Tyr_kinase_AS"/>
</dbReference>
<dbReference type="PANTHER" id="PTHR14340:SF21">
    <property type="entry name" value="IG-LIKE DOMAIN-CONTAINING PROTEIN"/>
    <property type="match status" value="1"/>
</dbReference>
<dbReference type="PANTHER" id="PTHR14340">
    <property type="entry name" value="MICROFIBRIL-ASSOCIATED GLYCOPROTEIN 3"/>
    <property type="match status" value="1"/>
</dbReference>
<dbReference type="Pfam" id="PF00041">
    <property type="entry name" value="fn3"/>
    <property type="match status" value="132"/>
</dbReference>
<dbReference type="Pfam" id="PF07679">
    <property type="entry name" value="I-set"/>
    <property type="match status" value="162"/>
</dbReference>
<dbReference type="Pfam" id="PF00069">
    <property type="entry name" value="Pkinase"/>
    <property type="match status" value="1"/>
</dbReference>
<dbReference type="Pfam" id="PF02818">
    <property type="entry name" value="PPAK"/>
    <property type="match status" value="9"/>
</dbReference>
<dbReference type="Pfam" id="PF18362">
    <property type="entry name" value="THB"/>
    <property type="match status" value="1"/>
</dbReference>
<dbReference type="Pfam" id="PF09042">
    <property type="entry name" value="Titin_Z"/>
    <property type="match status" value="2"/>
</dbReference>
<dbReference type="SMART" id="SM00060">
    <property type="entry name" value="FN3"/>
    <property type="match status" value="132"/>
</dbReference>
<dbReference type="SMART" id="SM00409">
    <property type="entry name" value="IG"/>
    <property type="match status" value="167"/>
</dbReference>
<dbReference type="SMART" id="SM00408">
    <property type="entry name" value="IGc2"/>
    <property type="match status" value="148"/>
</dbReference>
<dbReference type="SMART" id="SM00406">
    <property type="entry name" value="IGv"/>
    <property type="match status" value="23"/>
</dbReference>
<dbReference type="SUPFAM" id="SSF49265">
    <property type="entry name" value="Fibronectin type III"/>
    <property type="match status" value="74"/>
</dbReference>
<dbReference type="SUPFAM" id="SSF48726">
    <property type="entry name" value="Immunoglobulin"/>
    <property type="match status" value="167"/>
</dbReference>
<dbReference type="SUPFAM" id="SSF56112">
    <property type="entry name" value="Protein kinase-like (PK-like)"/>
    <property type="match status" value="1"/>
</dbReference>
<dbReference type="PROSITE" id="PS50853">
    <property type="entry name" value="FN3"/>
    <property type="match status" value="132"/>
</dbReference>
<dbReference type="PROSITE" id="PS50835">
    <property type="entry name" value="IG_LIKE"/>
    <property type="match status" value="143"/>
</dbReference>
<dbReference type="PROSITE" id="PS50011">
    <property type="entry name" value="PROTEIN_KINASE_DOM"/>
    <property type="match status" value="1"/>
</dbReference>
<organism>
    <name type="scientific">Homo sapiens</name>
    <name type="common">Human</name>
    <dbReference type="NCBI Taxonomy" id="9606"/>
    <lineage>
        <taxon>Eukaryota</taxon>
        <taxon>Metazoa</taxon>
        <taxon>Chordata</taxon>
        <taxon>Craniata</taxon>
        <taxon>Vertebrata</taxon>
        <taxon>Euteleostomi</taxon>
        <taxon>Mammalia</taxon>
        <taxon>Eutheria</taxon>
        <taxon>Euarchontoglires</taxon>
        <taxon>Primates</taxon>
        <taxon>Haplorrhini</taxon>
        <taxon>Catarrhini</taxon>
        <taxon>Hominidae</taxon>
        <taxon>Homo</taxon>
    </lineage>
</organism>
<keyword id="KW-0002">3D-structure</keyword>
<keyword id="KW-0025">Alternative splicing</keyword>
<keyword id="KW-0067">ATP-binding</keyword>
<keyword id="KW-0106">Calcium</keyword>
<keyword id="KW-0112">Calmodulin-binding</keyword>
<keyword id="KW-0122">Cardiomyopathy</keyword>
<keyword id="KW-0175">Coiled coil</keyword>
<keyword id="KW-0963">Cytoplasm</keyword>
<keyword id="KW-0903">Direct protein sequencing</keyword>
<keyword id="KW-0225">Disease variant</keyword>
<keyword id="KW-1015">Disulfide bond</keyword>
<keyword id="KW-0393">Immunoglobulin domain</keyword>
<keyword id="KW-0418">Kinase</keyword>
<keyword id="KW-0947">Limb-girdle muscular dystrophy</keyword>
<keyword id="KW-0460">Magnesium</keyword>
<keyword id="KW-0479">Metal-binding</keyword>
<keyword id="KW-1060">Myofibrillar myopathy</keyword>
<keyword id="KW-0547">Nucleotide-binding</keyword>
<keyword id="KW-0539">Nucleus</keyword>
<keyword id="KW-0597">Phosphoprotein</keyword>
<keyword id="KW-1267">Proteomics identification</keyword>
<keyword id="KW-1185">Reference proteome</keyword>
<keyword id="KW-0677">Repeat</keyword>
<keyword id="KW-0723">Serine/threonine-protein kinase</keyword>
<keyword id="KW-0808">Transferase</keyword>
<protein>
    <recommendedName>
        <fullName>Titin</fullName>
        <ecNumber>2.7.11.1</ecNumber>
    </recommendedName>
    <alternativeName>
        <fullName>Connectin</fullName>
    </alternativeName>
    <alternativeName>
        <fullName>Rhabdomyosarcoma antigen MU-RMS-40.14</fullName>
    </alternativeName>
</protein>
<feature type="chain" id="PRO_0000239311" description="Titin">
    <location>
        <begin position="1"/>
        <end position="34350"/>
    </location>
</feature>
<feature type="domain" description="Ig-like 1">
    <location>
        <begin position="6"/>
        <end position="96"/>
    </location>
</feature>
<feature type="domain" description="Ig-like 2">
    <location>
        <begin position="104"/>
        <end position="192"/>
    </location>
</feature>
<feature type="repeat" description="Z-repeat 1">
    <location>
        <begin position="417"/>
        <end position="462"/>
    </location>
</feature>
<feature type="repeat" description="Z-repeat 2">
    <location>
        <begin position="466"/>
        <end position="511"/>
    </location>
</feature>
<feature type="repeat" description="Z-repeat 3">
    <location>
        <begin position="512"/>
        <end position="554"/>
    </location>
</feature>
<feature type="repeat" description="Z-repeat 4">
    <location>
        <begin position="555"/>
        <end position="600"/>
    </location>
</feature>
<feature type="repeat" description="Z-repeat 5">
    <location>
        <begin position="601"/>
        <end position="646"/>
    </location>
</feature>
<feature type="repeat" description="Z-repeat 6">
    <location>
        <begin position="647"/>
        <end position="691"/>
    </location>
</feature>
<feature type="repeat" description="Z-repeat 7">
    <location>
        <begin position="692"/>
        <end position="740"/>
    </location>
</feature>
<feature type="domain" description="Ig-like 3">
    <location>
        <begin position="943"/>
        <end position="1031"/>
    </location>
</feature>
<feature type="domain" description="Ig-like 4">
    <location>
        <begin position="1082"/>
        <end position="1172"/>
    </location>
</feature>
<feature type="domain" description="Ig-like 5">
    <location>
        <begin position="1291"/>
        <end position="1382"/>
    </location>
</feature>
<feature type="domain" description="Ig-like 6">
    <location>
        <begin position="1457"/>
        <end position="1546"/>
    </location>
</feature>
<feature type="domain" description="Ig-like 7">
    <location>
        <begin position="1556"/>
        <end position="1646"/>
    </location>
</feature>
<feature type="domain" description="Ig-like 8">
    <location>
        <begin position="1703"/>
        <end position="1793"/>
    </location>
</feature>
<feature type="domain" description="Ig-like 9">
    <location>
        <begin position="1841"/>
        <end position="1928"/>
    </location>
</feature>
<feature type="domain" description="Ig-like 10">
    <location>
        <begin position="2078"/>
        <end position="2167"/>
    </location>
</feature>
<feature type="domain" description="Ig-like 11">
    <location>
        <begin position="2171"/>
        <end position="2262"/>
    </location>
</feature>
<feature type="domain" description="Ig-like 12">
    <location>
        <begin position="2264"/>
        <end position="2354"/>
    </location>
</feature>
<feature type="domain" description="Ig-like 13">
    <location>
        <begin position="2353"/>
        <end position="2443"/>
    </location>
</feature>
<feature type="domain" description="Ig-like 14">
    <location>
        <begin position="2430"/>
        <end position="2529"/>
    </location>
</feature>
<feature type="domain" description="Ig-like 15">
    <location>
        <begin position="2620"/>
        <end position="2703"/>
    </location>
</feature>
<feature type="domain" description="Ig-like 16">
    <location>
        <begin position="2880"/>
        <end position="2965"/>
    </location>
</feature>
<feature type="domain" description="Ig-like 17">
    <location>
        <begin position="2968"/>
        <end position="3050"/>
    </location>
</feature>
<feature type="domain" description="Ig-like 18">
    <location>
        <begin position="3058"/>
        <end position="3141"/>
    </location>
</feature>
<feature type="domain" description="Ig-like 19">
    <location>
        <begin position="3239"/>
        <end position="3327"/>
    </location>
</feature>
<feature type="domain" description="Ig-like 20">
    <location>
        <begin position="3344"/>
        <end position="3432"/>
    </location>
</feature>
<feature type="domain" description="Ig-like 21">
    <location>
        <begin position="3503"/>
        <end position="3586"/>
    </location>
</feature>
<feature type="domain" description="Ig-like 22">
    <location>
        <begin position="3621"/>
        <end position="3712"/>
    </location>
</feature>
<feature type="domain" description="Ig-like 23">
    <location>
        <begin position="4289"/>
        <end position="4376"/>
    </location>
</feature>
<feature type="domain" description="Ig-like 24">
    <location>
        <begin position="4383"/>
        <end position="4471"/>
    </location>
</feature>
<feature type="domain" description="Ig-like 25">
    <location>
        <begin position="4478"/>
        <end position="4566"/>
    </location>
</feature>
<feature type="domain" description="Ig-like 26">
    <location>
        <begin position="4571"/>
        <end position="4659"/>
    </location>
</feature>
<feature type="domain" description="Ig-like 27">
    <location>
        <begin position="4664"/>
        <end position="4753"/>
    </location>
</feature>
<feature type="domain" description="Ig-like 28">
    <location>
        <begin position="4758"/>
        <end position="4846"/>
    </location>
</feature>
<feature type="domain" description="Ig-like 29">
    <location>
        <begin position="4851"/>
        <end position="4936"/>
    </location>
</feature>
<feature type="domain" description="Ig-like 30">
    <location>
        <begin position="4943"/>
        <end position="5032"/>
    </location>
</feature>
<feature type="domain" description="Ig-like 31">
    <location>
        <begin position="5040"/>
        <end position="5128"/>
    </location>
</feature>
<feature type="domain" description="Ig-like 32">
    <location>
        <begin position="5133"/>
        <end position="5221"/>
    </location>
</feature>
<feature type="domain" description="Ig-like 33">
    <location>
        <begin position="5225"/>
        <end position="5314"/>
    </location>
</feature>
<feature type="domain" description="Ig-like 34">
    <location>
        <begin position="5320"/>
        <end position="5408"/>
    </location>
</feature>
<feature type="domain" description="Ig-like 35">
    <location>
        <begin position="5413"/>
        <end position="5501"/>
    </location>
</feature>
<feature type="domain" description="Ig-like 36">
    <location>
        <begin position="5505"/>
        <end position="5594"/>
    </location>
</feature>
<feature type="domain" description="Ig-like 37">
    <location>
        <begin position="5602"/>
        <end position="5690"/>
    </location>
</feature>
<feature type="domain" description="Ig-like 38">
    <location>
        <begin position="5695"/>
        <end position="5783"/>
    </location>
</feature>
<feature type="domain" description="Ig-like 39">
    <location>
        <begin position="5788"/>
        <end position="5877"/>
    </location>
</feature>
<feature type="domain" description="Ig-like 40">
    <location>
        <begin position="5882"/>
        <end position="5970"/>
    </location>
</feature>
<feature type="domain" description="Ig-like 41">
    <location>
        <begin position="5975"/>
        <end position="6063"/>
    </location>
</feature>
<feature type="domain" description="Ig-like 42">
    <location>
        <begin position="6067"/>
        <end position="6156"/>
    </location>
</feature>
<feature type="domain" description="Ig-like 43">
    <location>
        <begin position="6164"/>
        <end position="6252"/>
    </location>
</feature>
<feature type="domain" description="Ig-like 44">
    <location>
        <begin position="6257"/>
        <end position="6347"/>
    </location>
</feature>
<feature type="domain" description="Ig-like 45">
    <location>
        <begin position="6350"/>
        <end position="6440"/>
    </location>
</feature>
<feature type="domain" description="Ig-like 46">
    <location>
        <begin position="6444"/>
        <end position="6534"/>
    </location>
</feature>
<feature type="domain" description="Ig-like 47">
    <location>
        <begin position="6537"/>
        <end position="6626"/>
    </location>
</feature>
<feature type="domain" description="Ig-like 48">
    <location>
        <begin position="6630"/>
        <end position="6721"/>
    </location>
</feature>
<feature type="domain" description="Ig-like 49">
    <location>
        <begin position="6727"/>
        <end position="6815"/>
    </location>
</feature>
<feature type="domain" description="Ig-like 50">
    <location>
        <begin position="6820"/>
        <end position="6908"/>
    </location>
</feature>
<feature type="domain" description="Ig-like 51">
    <location>
        <begin position="6912"/>
        <end position="7001"/>
    </location>
</feature>
<feature type="domain" description="Ig-like 52">
    <location>
        <begin position="7005"/>
        <end position="7093"/>
    </location>
</feature>
<feature type="domain" description="Ig-like 53">
    <location>
        <begin position="7102"/>
        <end position="7190"/>
    </location>
</feature>
<feature type="domain" description="Ig-like 54">
    <location>
        <begin position="7198"/>
        <end position="7286"/>
    </location>
</feature>
<feature type="domain" description="Ig-like 55">
    <location>
        <begin position="7291"/>
        <end position="7380"/>
    </location>
</feature>
<feature type="domain" description="Ig-like 56">
    <location>
        <begin position="7385"/>
        <end position="7473"/>
    </location>
</feature>
<feature type="domain" description="Ig-like 57">
    <location>
        <begin position="7478"/>
        <end position="7567"/>
    </location>
</feature>
<feature type="domain" description="Ig-like 58">
    <location>
        <begin position="7571"/>
        <end position="7662"/>
    </location>
</feature>
<feature type="domain" description="Ig-like 59">
    <location>
        <begin position="7668"/>
        <end position="7756"/>
    </location>
</feature>
<feature type="domain" description="Ig-like 60">
    <location>
        <begin position="7761"/>
        <end position="7849"/>
    </location>
</feature>
<feature type="domain" description="Ig-like 61">
    <location>
        <begin position="7853"/>
        <end position="7942"/>
    </location>
</feature>
<feature type="domain" description="Ig-like 62">
    <location>
        <begin position="7946"/>
        <end position="8035"/>
    </location>
</feature>
<feature type="domain" description="Ig-like 63">
    <location>
        <begin position="8042"/>
        <end position="8133"/>
    </location>
</feature>
<feature type="domain" description="Ig-like 64">
    <location>
        <begin position="8138"/>
        <end position="8229"/>
    </location>
</feature>
<feature type="domain" description="Ig-like 65">
    <location>
        <begin position="8232"/>
        <end position="8321"/>
    </location>
</feature>
<feature type="domain" description="Ig-like 66">
    <location>
        <begin position="8326"/>
        <end position="8414"/>
    </location>
</feature>
<feature type="domain" description="Ig-like 67">
    <location>
        <begin position="8419"/>
        <end position="8508"/>
    </location>
</feature>
<feature type="domain" description="Ig-like 68">
    <location>
        <begin position="8512"/>
        <end position="8603"/>
    </location>
</feature>
<feature type="domain" description="Ig-like 69">
    <location>
        <begin position="8609"/>
        <end position="8697"/>
    </location>
</feature>
<feature type="domain" description="Ig-like 70">
    <location>
        <begin position="8702"/>
        <end position="8790"/>
    </location>
</feature>
<feature type="domain" description="Ig-like 71">
    <location>
        <begin position="8794"/>
        <end position="8883"/>
    </location>
</feature>
<feature type="domain" description="Ig-like 72">
    <location>
        <begin position="8888"/>
        <end position="8976"/>
    </location>
</feature>
<feature type="domain" description="Ig-like 73">
    <location>
        <begin position="8984"/>
        <end position="9074"/>
    </location>
</feature>
<feature type="domain" description="Ig-like 74">
    <location>
        <begin position="9079"/>
        <end position="9168"/>
    </location>
</feature>
<feature type="domain" description="Ig-like 75">
    <location>
        <begin position="9176"/>
        <end position="9265"/>
    </location>
</feature>
<feature type="domain" description="Ig-like 76">
    <location>
        <begin position="9272"/>
        <end position="9361"/>
    </location>
</feature>
<feature type="domain" description="Ig-like 77">
    <location>
        <begin position="9366"/>
        <end position="9470"/>
    </location>
</feature>
<feature type="domain" description="Ig-like 78">
    <location>
        <begin position="9660"/>
        <end position="9755"/>
    </location>
</feature>
<feature type="domain" description="Ig-like 79">
    <location>
        <begin position="9760"/>
        <end position="9851"/>
    </location>
</feature>
<feature type="repeat" description="PEVK 1">
    <location>
        <begin position="10216"/>
        <end position="10242"/>
    </location>
</feature>
<feature type="repeat" description="PEVK 2">
    <location>
        <begin position="10244"/>
        <end position="10270"/>
    </location>
</feature>
<feature type="repeat" description="PEVK 3">
    <location>
        <begin position="10272"/>
        <end position="10298"/>
    </location>
</feature>
<feature type="repeat" description="PEVK 4">
    <location>
        <begin position="10300"/>
        <end position="10326"/>
    </location>
</feature>
<feature type="repeat" description="PEVK 5">
    <location>
        <begin position="10327"/>
        <end position="10353"/>
    </location>
</feature>
<feature type="repeat" description="PEVK 6">
    <location>
        <begin position="10355"/>
        <end position="10381"/>
    </location>
</feature>
<feature type="repeat" description="PEVK 7">
    <location>
        <begin position="10508"/>
        <end position="10534"/>
    </location>
</feature>
<feature type="repeat" description="PEVK 8">
    <location>
        <begin position="10536"/>
        <end position="10562"/>
    </location>
</feature>
<feature type="repeat" description="PEVK 9">
    <location>
        <begin position="10592"/>
        <end position="10618"/>
    </location>
</feature>
<feature type="repeat" description="PEVK 10">
    <location>
        <begin position="10878"/>
        <end position="10904"/>
    </location>
</feature>
<feature type="repeat" description="PEVK 11">
    <location>
        <begin position="10906"/>
        <end position="10930"/>
    </location>
</feature>
<feature type="repeat" description="PEVK 12">
    <location>
        <begin position="10932"/>
        <end position="10958"/>
    </location>
</feature>
<feature type="repeat" description="PEVK 13">
    <location>
        <begin position="10960"/>
        <end position="10986"/>
    </location>
</feature>
<feature type="repeat" description="PEVK 14">
    <location>
        <begin position="10987"/>
        <end position="11014"/>
    </location>
</feature>
<feature type="repeat" description="PEVK 15">
    <location>
        <begin position="11363"/>
        <end position="11396"/>
    </location>
</feature>
<feature type="repeat" description="PEVK 16">
    <location>
        <begin position="11397"/>
        <end position="11421"/>
    </location>
</feature>
<feature type="repeat" description="PEVK 17">
    <location>
        <begin position="11453"/>
        <end position="11479"/>
    </location>
</feature>
<feature type="repeat" description="PEVK 18">
    <location>
        <begin position="11481"/>
        <end position="11507"/>
    </location>
</feature>
<feature type="repeat" description="PEVK 19">
    <location>
        <begin position="11509"/>
        <end position="11535"/>
    </location>
</feature>
<feature type="repeat" description="PEVK 20">
    <location>
        <begin position="11537"/>
        <end position="11563"/>
    </location>
</feature>
<feature type="repeat" description="PEVK 21">
    <location>
        <begin position="11565"/>
        <end position="11591"/>
    </location>
</feature>
<feature type="repeat" description="PEVK 22">
    <location>
        <begin position="11657"/>
        <end position="11683"/>
    </location>
</feature>
<feature type="repeat" description="PEVK 23">
    <location>
        <begin position="11703"/>
        <end position="11729"/>
    </location>
</feature>
<feature type="repeat" description="PEVK 24">
    <location>
        <begin position="11745"/>
        <end position="11771"/>
    </location>
</feature>
<feature type="repeat" description="PEVK 25">
    <location>
        <begin position="11775"/>
        <end position="11801"/>
    </location>
</feature>
<feature type="repeat" description="PEVK 26">
    <location>
        <begin position="11836"/>
        <end position="11862"/>
    </location>
</feature>
<feature type="repeat" description="PEVK 27">
    <location>
        <begin position="11864"/>
        <end position="11890"/>
    </location>
</feature>
<feature type="repeat" description="PEVK 28">
    <location>
        <begin position="11893"/>
        <end position="11919"/>
    </location>
</feature>
<feature type="repeat" description="PEVK 29">
    <location>
        <begin position="11929"/>
        <end position="11955"/>
    </location>
</feature>
<feature type="repeat" description="PEVK 30">
    <location>
        <begin position="11966"/>
        <end position="11992"/>
    </location>
</feature>
<feature type="repeat" description="PEVK 31">
    <location>
        <begin position="11996"/>
        <end position="12022"/>
    </location>
</feature>
<feature type="domain" description="Ig-like 80">
    <location>
        <begin position="12041"/>
        <end position="12133"/>
    </location>
</feature>
<feature type="domain" description="Ig-like 81">
    <location>
        <begin position="12138"/>
        <end position="12222"/>
    </location>
</feature>
<feature type="domain" description="Ig-like 82">
    <location>
        <begin position="12233"/>
        <end position="12318"/>
    </location>
</feature>
<feature type="domain" description="Ig-like 83">
    <location>
        <begin position="12499"/>
        <end position="12584"/>
    </location>
</feature>
<feature type="domain" description="Ig-like 84">
    <location>
        <begin position="12590"/>
        <end position="12672"/>
    </location>
</feature>
<feature type="domain" description="Ig-like 85">
    <location>
        <begin position="12766"/>
        <end position="12850"/>
    </location>
</feature>
<feature type="domain" description="Ig-like 86">
    <location>
        <begin position="12945"/>
        <end position="13032"/>
    </location>
</feature>
<feature type="domain" description="Ig-like 87">
    <location>
        <begin position="13120"/>
        <end position="13206"/>
    </location>
</feature>
<feature type="domain" description="Ig-like 88">
    <location>
        <begin position="13210"/>
        <end position="13295"/>
    </location>
</feature>
<feature type="domain" description="Ig-like 89">
    <location>
        <begin position="13299"/>
        <end position="13384"/>
    </location>
</feature>
<feature type="domain" description="Ig-like 90">
    <location>
        <begin position="13388"/>
        <end position="13478"/>
    </location>
</feature>
<feature type="domain" description="Ig-like 91">
    <location>
        <begin position="13479"/>
        <end position="13562"/>
    </location>
</feature>
<feature type="domain" description="Ig-like 92">
    <location>
        <begin position="13565"/>
        <end position="13655"/>
    </location>
</feature>
<feature type="domain" description="Ig-like 93">
    <location>
        <begin position="13659"/>
        <end position="13748"/>
    </location>
</feature>
<feature type="domain" description="Ig-like 94">
    <location>
        <begin position="13749"/>
        <end position="13833"/>
    </location>
</feature>
<feature type="domain" description="Ig-like 95">
    <location>
        <begin position="13927"/>
        <end position="14012"/>
    </location>
</feature>
<feature type="domain" description="Fibronectin type-III 1" evidence="5">
    <location>
        <begin position="14019"/>
        <end position="14114"/>
    </location>
</feature>
<feature type="domain" description="Fibronectin type-III 2" evidence="5">
    <location>
        <begin position="14120"/>
        <end position="14215"/>
    </location>
</feature>
<feature type="domain" description="Fibronectin type-III 3" evidence="5">
    <location>
        <begin position="14221"/>
        <end position="14316"/>
    </location>
</feature>
<feature type="domain" description="Fibronectin type-III 4" evidence="5">
    <location>
        <begin position="14417"/>
        <end position="14513"/>
    </location>
</feature>
<feature type="domain" description="Fibronectin type-III 5" evidence="5">
    <location>
        <begin position="14517"/>
        <end position="14614"/>
    </location>
</feature>
<feature type="domain" description="Ig-like 96">
    <location>
        <begin position="14615"/>
        <end position="14708"/>
    </location>
</feature>
<feature type="domain" description="Fibronectin type-III 6" evidence="5">
    <location>
        <begin position="14713"/>
        <end position="14806"/>
    </location>
</feature>
<feature type="domain" description="Fibronectin type-III 7" evidence="5">
    <location>
        <begin position="14812"/>
        <end position="14907"/>
    </location>
</feature>
<feature type="domain" description="Fibronectin type-III 8" evidence="5">
    <location>
        <begin position="14913"/>
        <end position="15007"/>
    </location>
</feature>
<feature type="domain" description="Fibronectin type-III 9" evidence="5">
    <location>
        <begin position="15010"/>
        <end position="15107"/>
    </location>
</feature>
<feature type="domain" description="Fibronectin type-III 10" evidence="5">
    <location>
        <begin position="15113"/>
        <end position="15207"/>
    </location>
</feature>
<feature type="domain" description="Fibronectin type-III 11" evidence="5">
    <location>
        <begin position="15214"/>
        <end position="15310"/>
    </location>
</feature>
<feature type="domain" description="Ig-like 97">
    <location>
        <begin position="15314"/>
        <end position="15402"/>
    </location>
</feature>
<feature type="domain" description="Fibronectin type-III 12" evidence="5">
    <location>
        <begin position="15409"/>
        <end position="15503"/>
    </location>
</feature>
<feature type="domain" description="Fibronectin type-III 13" evidence="5">
    <location>
        <begin position="15509"/>
        <end position="15604"/>
    </location>
</feature>
<feature type="domain" description="Ig-like 98">
    <location>
        <begin position="15608"/>
        <end position="15724"/>
    </location>
</feature>
<feature type="domain" description="Fibronectin type-III 14" evidence="5">
    <location>
        <begin position="15731"/>
        <end position="15826"/>
    </location>
</feature>
<feature type="domain" description="Fibronectin type-III 15" evidence="5">
    <location>
        <begin position="15832"/>
        <end position="15926"/>
    </location>
</feature>
<feature type="domain" description="Fibronectin type-III 16" evidence="5">
    <location>
        <begin position="15929"/>
        <end position="16025"/>
    </location>
</feature>
<feature type="domain" description="Ig-like 99">
    <location>
        <begin position="16029"/>
        <end position="16119"/>
    </location>
</feature>
<feature type="domain" description="Fibronectin type-III 17" evidence="5">
    <location>
        <begin position="16126"/>
        <end position="16218"/>
    </location>
</feature>
<feature type="domain" description="Fibronectin type-III 18" evidence="5">
    <location>
        <begin position="16224"/>
        <end position="16318"/>
    </location>
</feature>
<feature type="domain" description="Ig-like 100">
    <location>
        <begin position="16322"/>
        <end position="16420"/>
    </location>
</feature>
<feature type="domain" description="Fibronectin type-III 19" evidence="5">
    <location>
        <begin position="16427"/>
        <end position="16522"/>
    </location>
</feature>
<feature type="domain" description="Fibronectin type-III 20" evidence="5">
    <location>
        <begin position="16528"/>
        <end position="16628"/>
    </location>
</feature>
<feature type="domain" description="Fibronectin type-III 21" evidence="5">
    <location>
        <begin position="16634"/>
        <end position="16734"/>
    </location>
</feature>
<feature type="domain" description="Ig-like 101">
    <location>
        <begin position="16727"/>
        <end position="16834"/>
    </location>
</feature>
<feature type="domain" description="Fibronectin type-III 22" evidence="5">
    <location>
        <begin position="16841"/>
        <end position="16934"/>
    </location>
</feature>
<feature type="domain" description="Fibronectin type-III 23" evidence="5">
    <location>
        <begin position="16941"/>
        <end position="17041"/>
    </location>
</feature>
<feature type="domain" description="Ig-like 102">
    <location>
        <begin position="17044"/>
        <end position="17139"/>
    </location>
</feature>
<feature type="domain" description="Fibronectin type-III 24" evidence="5">
    <location>
        <begin position="17147"/>
        <end position="17240"/>
    </location>
</feature>
<feature type="domain" description="Fibronectin type-III 25" evidence="5">
    <location>
        <begin position="17246"/>
        <end position="17345"/>
    </location>
</feature>
<feature type="domain" description="Fibronectin type-III 26" evidence="5">
    <location>
        <begin position="17348"/>
        <end position="17445"/>
    </location>
</feature>
<feature type="domain" description="Ig-like 103">
    <location>
        <begin position="17449"/>
        <end position="17536"/>
    </location>
</feature>
<feature type="domain" description="Fibronectin type-III 27" evidence="5">
    <location>
        <begin position="17545"/>
        <end position="17640"/>
    </location>
</feature>
<feature type="domain" description="Fibronectin type-III 28" evidence="5">
    <location>
        <begin position="17646"/>
        <end position="17741"/>
    </location>
</feature>
<feature type="domain" description="Ig-like 104">
    <location>
        <begin position="17745"/>
        <end position="17834"/>
    </location>
</feature>
<feature type="domain" description="Fibronectin type-III 29" evidence="5">
    <location>
        <begin position="17842"/>
        <end position="17935"/>
    </location>
</feature>
<feature type="domain" description="Fibronectin type-III 30" evidence="5">
    <location>
        <begin position="17941"/>
        <end position="18036"/>
    </location>
</feature>
<feature type="domain" description="Fibronectin type-III 31" evidence="5">
    <location>
        <begin position="18042"/>
        <end position="18139"/>
    </location>
</feature>
<feature type="domain" description="Ig-like 105">
    <location>
        <begin position="18143"/>
        <end position="18228"/>
    </location>
</feature>
<feature type="domain" description="Fibronectin type-III 32" evidence="5">
    <location>
        <begin position="18239"/>
        <end position="18333"/>
    </location>
</feature>
<feature type="domain" description="Fibronectin type-III 33" evidence="5">
    <location>
        <begin position="18339"/>
        <end position="18431"/>
    </location>
</feature>
<feature type="domain" description="Ig-like 106">
    <location>
        <begin position="18435"/>
        <end position="18526"/>
    </location>
</feature>
<feature type="domain" description="Fibronectin type-III 34" evidence="5">
    <location>
        <begin position="18533"/>
        <end position="18632"/>
    </location>
</feature>
<feature type="domain" description="Fibronectin type-III 35" evidence="5">
    <location>
        <begin position="18633"/>
        <end position="18727"/>
    </location>
</feature>
<feature type="domain" description="Fibronectin type-III 36" evidence="5">
    <location>
        <begin position="18733"/>
        <end position="18829"/>
    </location>
</feature>
<feature type="domain" description="Ig-like 107">
    <location>
        <begin position="18833"/>
        <end position="18924"/>
    </location>
</feature>
<feature type="domain" description="Fibronectin type-III 37" evidence="5">
    <location>
        <begin position="18931"/>
        <end position="19025"/>
    </location>
</feature>
<feature type="domain" description="Fibronectin type-III 38" evidence="5">
    <location>
        <begin position="19030"/>
        <end position="19124"/>
    </location>
</feature>
<feature type="domain" description="Ig-like 108">
    <location>
        <begin position="19128"/>
        <end position="19219"/>
    </location>
</feature>
<feature type="domain" description="Fibronectin type-III 39" evidence="5">
    <location>
        <begin position="19226"/>
        <end position="19321"/>
    </location>
</feature>
<feature type="domain" description="Fibronectin type-III 40" evidence="5">
    <location>
        <begin position="19325"/>
        <end position="19420"/>
    </location>
</feature>
<feature type="domain" description="Fibronectin type-III 41" evidence="5">
    <location>
        <begin position="19426"/>
        <end position="19527"/>
    </location>
</feature>
<feature type="domain" description="Ig-like 109">
    <location>
        <begin position="19531"/>
        <end position="19617"/>
    </location>
</feature>
<feature type="domain" description="Fibronectin type-III 42" evidence="5">
    <location>
        <begin position="19628"/>
        <end position="19722"/>
    </location>
</feature>
<feature type="domain" description="Fibronectin type-III 43" evidence="5">
    <location>
        <begin position="19728"/>
        <end position="19823"/>
    </location>
</feature>
<feature type="domain" description="Ig-like 110">
    <location>
        <begin position="19826"/>
        <end position="19914"/>
    </location>
</feature>
<feature type="domain" description="Fibronectin type-III 44" evidence="5">
    <location>
        <begin position="19921"/>
        <end position="20017"/>
    </location>
</feature>
<feature type="domain" description="Fibronectin type-III 45" evidence="5">
    <location>
        <begin position="20018"/>
        <end position="20116"/>
    </location>
</feature>
<feature type="domain" description="Fibronectin type-III 46" evidence="5">
    <location>
        <begin position="20119"/>
        <end position="20217"/>
    </location>
</feature>
<feature type="domain" description="Ig-like 111">
    <location>
        <begin position="20220"/>
        <end position="20311"/>
    </location>
</feature>
<feature type="domain" description="Fibronectin type-III 47" evidence="5">
    <location>
        <begin position="20318"/>
        <end position="20411"/>
    </location>
</feature>
<feature type="domain" description="Fibronectin type-III 48" evidence="5">
    <location>
        <begin position="20417"/>
        <end position="20512"/>
    </location>
</feature>
<feature type="domain" description="Fibronectin type-III 49" evidence="5">
    <location>
        <begin position="20518"/>
        <end position="20613"/>
    </location>
</feature>
<feature type="domain" description="Fibronectin type-III 50" evidence="5">
    <location>
        <begin position="20716"/>
        <end position="20813"/>
    </location>
</feature>
<feature type="domain" description="Fibronectin type-III 51" evidence="5">
    <location>
        <begin position="20814"/>
        <end position="20908"/>
    </location>
</feature>
<feature type="domain" description="Ig-like 112">
    <location>
        <begin position="20893"/>
        <end position="20996"/>
    </location>
</feature>
<feature type="domain" description="Fibronectin type-III 52" evidence="5">
    <location>
        <begin position="21006"/>
        <end position="21101"/>
    </location>
</feature>
<feature type="domain" description="Fibronectin type-III 53" evidence="5">
    <location>
        <begin position="21105"/>
        <end position="21200"/>
    </location>
</feature>
<feature type="domain" description="Fibronectin type-III 54" evidence="5">
    <location>
        <begin position="21203"/>
        <end position="21299"/>
    </location>
</feature>
<feature type="domain" description="Ig-like 113">
    <location>
        <begin position="21303"/>
        <end position="21395"/>
    </location>
</feature>
<feature type="domain" description="Fibronectin type-III 55" evidence="5">
    <location>
        <begin position="21402"/>
        <end position="21495"/>
    </location>
</feature>
<feature type="domain" description="Fibronectin type-III 56" evidence="5">
    <location>
        <begin position="21501"/>
        <end position="21596"/>
    </location>
</feature>
<feature type="domain" description="Fibronectin type-III 57" evidence="5">
    <location>
        <begin position="21602"/>
        <end position="21697"/>
    </location>
</feature>
<feature type="domain" description="Ig-like 114">
    <location>
        <begin position="21701"/>
        <end position="21793"/>
    </location>
</feature>
<feature type="domain" description="Fibronectin type-III 58" evidence="5">
    <location>
        <begin position="21797"/>
        <end position="21891"/>
    </location>
</feature>
<feature type="domain" description="Fibronectin type-III 59" evidence="5">
    <location>
        <begin position="21894"/>
        <end position="21986"/>
    </location>
</feature>
<feature type="domain" description="Ig-like 115">
    <location>
        <begin position="21990"/>
        <end position="22083"/>
    </location>
</feature>
<feature type="domain" description="Fibronectin type-III 60" evidence="5">
    <location>
        <begin position="22088"/>
        <end position="22182"/>
    </location>
</feature>
<feature type="domain" description="Fibronectin type-III 61" evidence="5">
    <location>
        <begin position="22188"/>
        <end position="22283"/>
    </location>
</feature>
<feature type="domain" description="Fibronectin type-III 62" evidence="5">
    <location>
        <begin position="22286"/>
        <end position="22382"/>
    </location>
</feature>
<feature type="domain" description="Ig-like 116">
    <location>
        <begin position="22386"/>
        <end position="22477"/>
    </location>
</feature>
<feature type="domain" description="Fibronectin type-III 63" evidence="5">
    <location>
        <begin position="22484"/>
        <end position="22578"/>
    </location>
</feature>
<feature type="domain" description="Fibronectin type-III 64" evidence="5">
    <location>
        <begin position="22584"/>
        <end position="22679"/>
    </location>
</feature>
<feature type="domain" description="Fibronectin type-III 65" evidence="5">
    <location>
        <begin position="22685"/>
        <end position="22781"/>
    </location>
</feature>
<feature type="domain" description="Ig-like 117">
    <location>
        <begin position="22785"/>
        <end position="22874"/>
    </location>
</feature>
<feature type="domain" description="Fibronectin type-III 66" evidence="5">
    <location>
        <begin position="22881"/>
        <end position="22976"/>
    </location>
</feature>
<feature type="domain" description="Fibronectin type-III 67" evidence="5">
    <location>
        <begin position="22978"/>
        <end position="23071"/>
    </location>
</feature>
<feature type="domain" description="Ig-like 118">
    <location>
        <begin position="23075"/>
        <end position="23163"/>
    </location>
</feature>
<feature type="domain" description="Fibronectin type-III 68" evidence="5">
    <location>
        <begin position="23170"/>
        <end position="23264"/>
    </location>
</feature>
<feature type="domain" description="Fibronectin type-III 69" evidence="5">
    <location>
        <begin position="23270"/>
        <end position="23364"/>
    </location>
</feature>
<feature type="domain" description="Fibronectin type-III 70" evidence="5">
    <location>
        <begin position="23368"/>
        <end position="23463"/>
    </location>
</feature>
<feature type="domain" description="Ig-like 119">
    <location>
        <begin position="23468"/>
        <end position="23555"/>
    </location>
</feature>
<feature type="domain" description="Fibronectin type-III 71" evidence="5">
    <location>
        <begin position="23566"/>
        <end position="23660"/>
    </location>
</feature>
<feature type="domain" description="Fibronectin type-III 72" evidence="5">
    <location>
        <begin position="23666"/>
        <end position="23761"/>
    </location>
</feature>
<feature type="domain" description="Fibronectin type-III 73" evidence="5">
    <location>
        <begin position="23767"/>
        <end position="23863"/>
    </location>
</feature>
<feature type="domain" description="Ig-like 120">
    <location>
        <begin position="23867"/>
        <end position="23954"/>
    </location>
</feature>
<feature type="domain" description="Fibronectin type-III 74" evidence="5">
    <location>
        <begin position="23963"/>
        <end position="24057"/>
    </location>
</feature>
<feature type="domain" description="Fibronectin type-III 75" evidence="5">
    <location>
        <begin position="24060"/>
        <end position="24153"/>
    </location>
</feature>
<feature type="domain" description="Ig-like 121">
    <location>
        <begin position="24157"/>
        <end position="24241"/>
    </location>
</feature>
<feature type="domain" description="Fibronectin type-III 76" evidence="5">
    <location>
        <begin position="24252"/>
        <end position="24346"/>
    </location>
</feature>
<feature type="domain" description="Fibronectin type-III 77" evidence="5">
    <location>
        <begin position="24352"/>
        <end position="24446"/>
    </location>
</feature>
<feature type="domain" description="Fibronectin type-III 78" evidence="5">
    <location>
        <begin position="24450"/>
        <end position="24546"/>
    </location>
</feature>
<feature type="domain" description="Ig-like 122">
    <location>
        <begin position="24550"/>
        <end position="24641"/>
    </location>
</feature>
<feature type="domain" description="Fibronectin type-III 79" evidence="5">
    <location>
        <begin position="24648"/>
        <end position="24742"/>
    </location>
</feature>
<feature type="domain" description="Fibronectin type-III 80" evidence="5">
    <location>
        <begin position="24748"/>
        <end position="24843"/>
    </location>
</feature>
<feature type="domain" description="Fibronectin type-III 81" evidence="5">
    <location>
        <begin position="24849"/>
        <end position="24945"/>
    </location>
</feature>
<feature type="domain" description="Ig-like 123">
    <location>
        <begin position="24949"/>
        <end position="25038"/>
    </location>
</feature>
<feature type="domain" description="Fibronectin type-III 82" evidence="5">
    <location>
        <begin position="25045"/>
        <end position="25139"/>
    </location>
</feature>
<feature type="domain" description="Fibronectin type-III 83" evidence="5">
    <location>
        <begin position="25142"/>
        <end position="25235"/>
    </location>
</feature>
<feature type="domain" description="Ig-like 124">
    <location>
        <begin position="25239"/>
        <end position="25325"/>
    </location>
</feature>
<feature type="domain" description="Fibronectin type-III 84" evidence="5">
    <location>
        <begin position="25335"/>
        <end position="25428"/>
    </location>
</feature>
<feature type="domain" description="Fibronectin type-III 85" evidence="5">
    <location>
        <begin position="25434"/>
        <end position="25529"/>
    </location>
</feature>
<feature type="domain" description="Fibronectin type-III 86" evidence="5">
    <location>
        <begin position="25532"/>
        <end position="25627"/>
    </location>
</feature>
<feature type="domain" description="Ig-like 125">
    <location>
        <begin position="25632"/>
        <end position="25722"/>
    </location>
</feature>
<feature type="domain" description="Fibronectin type-III 87" evidence="5">
    <location>
        <begin position="25731"/>
        <end position="25825"/>
    </location>
</feature>
<feature type="domain" description="Fibronectin type-III 88" evidence="5">
    <location>
        <begin position="25831"/>
        <end position="25926"/>
    </location>
</feature>
<feature type="domain" description="Fibronectin type-III 89" evidence="5">
    <location>
        <begin position="25932"/>
        <end position="26028"/>
    </location>
</feature>
<feature type="domain" description="Ig-like 126">
    <location>
        <begin position="26032"/>
        <end position="26121"/>
    </location>
</feature>
<feature type="domain" description="Fibronectin type-III 90" evidence="5">
    <location>
        <begin position="26128"/>
        <end position="26222"/>
    </location>
</feature>
<feature type="domain" description="Fibronectin type-III 91" evidence="5">
    <location>
        <begin position="26225"/>
        <end position="26318"/>
    </location>
</feature>
<feature type="domain" description="Ig-like 127">
    <location>
        <begin position="26322"/>
        <end position="26410"/>
    </location>
</feature>
<feature type="domain" description="Fibronectin type-III 92" evidence="5">
    <location>
        <begin position="26417"/>
        <end position="26510"/>
    </location>
</feature>
<feature type="domain" description="Fibronectin type-III 93" evidence="5">
    <location>
        <begin position="26516"/>
        <end position="26611"/>
    </location>
</feature>
<feature type="domain" description="Fibronectin type-III 94" evidence="5">
    <location>
        <begin position="26614"/>
        <end position="26710"/>
    </location>
</feature>
<feature type="domain" description="Ig-like 128">
    <location>
        <begin position="26714"/>
        <end position="26801"/>
    </location>
</feature>
<feature type="domain" description="Fibronectin type-III 95" evidence="5">
    <location>
        <begin position="26812"/>
        <end position="26906"/>
    </location>
</feature>
<feature type="domain" description="Fibronectin type-III 96" evidence="5">
    <location>
        <begin position="26912"/>
        <end position="27007"/>
    </location>
</feature>
<feature type="domain" description="Fibronectin type-III 97" evidence="5">
    <location>
        <begin position="27013"/>
        <end position="27107"/>
    </location>
</feature>
<feature type="domain" description="Ig-like 129">
    <location>
        <begin position="27101"/>
        <end position="27196"/>
    </location>
</feature>
<feature type="domain" description="Fibronectin type-III 98" evidence="5">
    <location>
        <begin position="27205"/>
        <end position="27296"/>
    </location>
</feature>
<feature type="domain" description="Fibronectin type-III 99" evidence="5">
    <location>
        <begin position="27302"/>
        <end position="27392"/>
    </location>
</feature>
<feature type="domain" description="Fibronectin type-III 100" evidence="5">
    <location>
        <begin position="27499"/>
        <end position="27593"/>
    </location>
</feature>
<feature type="domain" description="Fibronectin type-III 101" evidence="5">
    <location>
        <begin position="27599"/>
        <end position="27694"/>
    </location>
</feature>
<feature type="domain" description="Fibronectin type-III 102" evidence="5">
    <location>
        <begin position="27697"/>
        <end position="27793"/>
    </location>
</feature>
<feature type="domain" description="Ig-like 130">
    <location>
        <begin position="27797"/>
        <end position="27888"/>
    </location>
</feature>
<feature type="domain" description="Fibronectin type-III 103" evidence="5">
    <location>
        <begin position="27895"/>
        <end position="27989"/>
    </location>
</feature>
<feature type="domain" description="Fibronectin type-III 104" evidence="5">
    <location>
        <begin position="27995"/>
        <end position="28090"/>
    </location>
</feature>
<feature type="domain" description="Fibronectin type-III 105" evidence="5">
    <location>
        <begin position="28096"/>
        <end position="28192"/>
    </location>
</feature>
<feature type="domain" description="Ig-like 131">
    <location>
        <begin position="28196"/>
        <end position="28286"/>
    </location>
</feature>
<feature type="domain" description="Fibronectin type-III 106" evidence="5">
    <location>
        <begin position="28295"/>
        <end position="28389"/>
    </location>
</feature>
<feature type="domain" description="Fibronectin type-III 107" evidence="5">
    <location>
        <begin position="28392"/>
        <end position="28484"/>
    </location>
</feature>
<feature type="domain" description="Ig-like 132">
    <location>
        <begin position="28488"/>
        <end position="28577"/>
    </location>
</feature>
<feature type="domain" description="Fibronectin type-III 108" evidence="5">
    <location>
        <begin position="28583"/>
        <end position="28680"/>
    </location>
</feature>
<feature type="domain" description="Fibronectin type-III 109" evidence="5">
    <location>
        <begin position="28686"/>
        <end position="28781"/>
    </location>
</feature>
<feature type="domain" description="Fibronectin type-III 110" evidence="5">
    <location>
        <begin position="28784"/>
        <end position="28879"/>
    </location>
</feature>
<feature type="domain" description="Ig-like 133">
    <location>
        <begin position="28882"/>
        <end position="28974"/>
    </location>
</feature>
<feature type="domain" description="Fibronectin type-III 111" evidence="5">
    <location>
        <begin position="28979"/>
        <end position="29071"/>
    </location>
</feature>
<feature type="domain" description="Fibronectin type-III 112" evidence="5">
    <location>
        <begin position="29081"/>
        <end position="29177"/>
    </location>
</feature>
<feature type="domain" description="Fibronectin type-III 113" evidence="5">
    <location>
        <begin position="29180"/>
        <end position="29278"/>
    </location>
</feature>
<feature type="domain" description="Ig-like 134">
    <location>
        <begin position="29282"/>
        <end position="29367"/>
    </location>
</feature>
<feature type="domain" description="Fibronectin type-III 114" evidence="5">
    <location>
        <begin position="29378"/>
        <end position="29473"/>
    </location>
</feature>
<feature type="domain" description="Fibronectin type-III 115" evidence="5">
    <location>
        <begin position="29475"/>
        <end position="29568"/>
    </location>
</feature>
<feature type="domain" description="Ig-like 135">
    <location>
        <begin position="29568"/>
        <end position="29663"/>
    </location>
</feature>
<feature type="domain" description="Fibronectin type-III 116" evidence="5">
    <location>
        <begin position="29670"/>
        <end position="29764"/>
    </location>
</feature>
<feature type="domain" description="Fibronectin type-III 117" evidence="5">
    <location>
        <begin position="29770"/>
        <end position="29865"/>
    </location>
</feature>
<feature type="domain" description="Fibronectin type-III 118" evidence="5">
    <location>
        <begin position="29868"/>
        <end position="29967"/>
    </location>
</feature>
<feature type="domain" description="Ig-like 136">
    <location>
        <begin position="29971"/>
        <end position="30059"/>
    </location>
</feature>
<feature type="domain" description="Fibronectin type-III 119" evidence="5">
    <location>
        <begin position="30070"/>
        <end position="30163"/>
    </location>
</feature>
<feature type="domain" description="Fibronectin type-III 120" evidence="5">
    <location>
        <begin position="30169"/>
        <end position="30265"/>
    </location>
</feature>
<feature type="domain" description="Fibronectin type-III 121" evidence="5">
    <location>
        <begin position="30271"/>
        <end position="30367"/>
    </location>
</feature>
<feature type="domain" description="Ig-like 137">
    <location>
        <begin position="30371"/>
        <end position="30460"/>
    </location>
</feature>
<feature type="domain" description="Fibronectin type-III 122" evidence="5">
    <location>
        <begin position="30467"/>
        <end position="30561"/>
    </location>
</feature>
<feature type="domain" description="Fibronectin type-III 123" evidence="5">
    <location>
        <begin position="30564"/>
        <end position="30658"/>
    </location>
</feature>
<feature type="domain" description="Ig-like 138">
    <location>
        <begin position="30663"/>
        <end position="30754"/>
    </location>
</feature>
<feature type="domain" description="Fibronectin type-III 124" evidence="5">
    <location>
        <begin position="30761"/>
        <end position="30855"/>
    </location>
</feature>
<feature type="domain" description="Fibronectin type-III 125" evidence="5">
    <location>
        <begin position="30861"/>
        <end position="30956"/>
    </location>
</feature>
<feature type="domain" description="Fibronectin type-III 126" evidence="5">
    <location>
        <begin position="30962"/>
        <end position="31058"/>
    </location>
</feature>
<feature type="domain" description="Ig-like 139">
    <location>
        <begin position="31061"/>
        <end position="31150"/>
    </location>
</feature>
<feature type="domain" description="Fibronectin type-III 127" evidence="5">
    <location>
        <begin position="31158"/>
        <end position="31254"/>
    </location>
</feature>
<feature type="domain" description="Fibronectin type-III 128" evidence="5">
    <location>
        <begin position="31258"/>
        <end position="31354"/>
    </location>
</feature>
<feature type="domain" description="Fibronectin type-III 129" evidence="5">
    <location>
        <begin position="31360"/>
        <end position="31455"/>
    </location>
</feature>
<feature type="domain" description="Ig-like 140">
    <location>
        <begin position="31460"/>
        <end position="31548"/>
    </location>
</feature>
<feature type="domain" description="Fibronectin type-III 130" evidence="5">
    <location>
        <begin position="31653"/>
        <end position="31748"/>
    </location>
</feature>
<feature type="domain" description="Fibronectin type-III 131" evidence="5">
    <location>
        <begin position="31754"/>
        <end position="31849"/>
    </location>
</feature>
<feature type="domain" description="Ig-like 141">
    <location>
        <begin position="31855"/>
        <end position="31945"/>
    </location>
</feature>
<feature type="domain" description="Ig-like 142">
    <location>
        <begin position="31955"/>
        <end position="32046"/>
    </location>
</feature>
<feature type="domain" description="Fibronectin type-III 132" evidence="5">
    <location>
        <begin position="32051"/>
        <end position="32144"/>
    </location>
</feature>
<feature type="domain" description="Protein kinase" evidence="4">
    <location>
        <begin position="32178"/>
        <end position="32432"/>
    </location>
</feature>
<feature type="domain" description="Ig-like 143">
    <location>
        <begin position="32496"/>
        <end position="32584"/>
    </location>
</feature>
<feature type="domain" description="Ig-like 144">
    <location>
        <begin position="32617"/>
        <end position="32710"/>
    </location>
</feature>
<feature type="domain" description="Ig-like 145">
    <location>
        <begin position="32722"/>
        <end position="32811"/>
    </location>
</feature>
<feature type="domain" description="Ig-like 146">
    <location>
        <begin position="33301"/>
        <end position="33391"/>
    </location>
</feature>
<feature type="domain" description="Ig-like 147">
    <location>
        <begin position="33488"/>
        <end position="33576"/>
    </location>
</feature>
<feature type="domain" description="Ig-like 148">
    <location>
        <begin position="33645"/>
        <end position="33732"/>
    </location>
</feature>
<feature type="domain" description="Ig-like 149">
    <location>
        <begin position="33779"/>
        <end position="33867"/>
    </location>
</feature>
<feature type="domain" description="Ig-like 150">
    <location>
        <begin position="33963"/>
        <end position="34052"/>
    </location>
</feature>
<feature type="domain" description="Ig-like 151">
    <location>
        <begin position="34061"/>
        <end position="34149"/>
    </location>
</feature>
<feature type="domain" description="Ig-like 152">
    <location>
        <begin position="34256"/>
        <end position="34344"/>
    </location>
</feature>
<feature type="region of interest" description="Disordered" evidence="6">
    <location>
        <begin position="244"/>
        <end position="313"/>
    </location>
</feature>
<feature type="region of interest" description="ZIS1">
    <location>
        <begin position="253"/>
        <end position="341"/>
    </location>
</feature>
<feature type="region of interest" description="Disordered" evidence="6">
    <location>
        <begin position="333"/>
        <end position="356"/>
    </location>
</feature>
<feature type="region of interest" description="Disordered" evidence="6">
    <location>
        <begin position="859"/>
        <end position="886"/>
    </location>
</feature>
<feature type="region of interest" description="Disordered" evidence="6">
    <location>
        <begin position="1408"/>
        <end position="1443"/>
    </location>
</feature>
<feature type="region of interest" description="ZIS5">
    <location>
        <begin position="1410"/>
        <end position="1440"/>
    </location>
</feature>
<feature type="region of interest" description="Disordered" evidence="6">
    <location>
        <begin position="4241"/>
        <end position="4272"/>
    </location>
</feature>
<feature type="region of interest" description="Disordered" evidence="6">
    <location>
        <begin position="9920"/>
        <end position="9945"/>
    </location>
</feature>
<feature type="region of interest" description="Disordered" evidence="6">
    <location>
        <begin position="10039"/>
        <end position="10070"/>
    </location>
</feature>
<feature type="region of interest" description="Disordered" evidence="6">
    <location>
        <begin position="10087"/>
        <end position="10109"/>
    </location>
</feature>
<feature type="region of interest" description="Disordered" evidence="6">
    <location>
        <begin position="10207"/>
        <end position="10280"/>
    </location>
</feature>
<feature type="region of interest" description="Disordered" evidence="6">
    <location>
        <begin position="10314"/>
        <end position="10361"/>
    </location>
</feature>
<feature type="region of interest" description="Disordered" evidence="6">
    <location>
        <begin position="10412"/>
        <end position="10457"/>
    </location>
</feature>
<feature type="region of interest" description="Disordered" evidence="6">
    <location>
        <begin position="10499"/>
        <end position="10566"/>
    </location>
</feature>
<feature type="region of interest" description="Disordered" evidence="6">
    <location>
        <begin position="10583"/>
        <end position="10617"/>
    </location>
</feature>
<feature type="region of interest" description="Disordered" evidence="6">
    <location>
        <begin position="10661"/>
        <end position="10743"/>
    </location>
</feature>
<feature type="region of interest" description="Disordered" evidence="6">
    <location>
        <begin position="10882"/>
        <end position="11102"/>
    </location>
</feature>
<feature type="region of interest" description="Disordered" evidence="6">
    <location>
        <begin position="11158"/>
        <end position="11193"/>
    </location>
</feature>
<feature type="region of interest" description="Disordered" evidence="6">
    <location>
        <begin position="11362"/>
        <end position="11636"/>
    </location>
</feature>
<feature type="region of interest" description="Disordered" evidence="6">
    <location>
        <begin position="11666"/>
        <end position="12032"/>
    </location>
</feature>
<feature type="region of interest" description="Disordered" evidence="6">
    <location>
        <begin position="14216"/>
        <end position="14236"/>
    </location>
</feature>
<feature type="region of interest" description="Disordered" evidence="6">
    <location>
        <begin position="14891"/>
        <end position="14921"/>
    </location>
</feature>
<feature type="region of interest" description="Disordered" evidence="6">
    <location>
        <begin position="15911"/>
        <end position="15939"/>
    </location>
</feature>
<feature type="region of interest" description="Disordered" evidence="6">
    <location>
        <begin position="16614"/>
        <end position="16654"/>
    </location>
</feature>
<feature type="region of interest" description="Disordered" evidence="6">
    <location>
        <begin position="18614"/>
        <end position="18637"/>
    </location>
</feature>
<feature type="region of interest" description="Disordered" evidence="6">
    <location>
        <begin position="18716"/>
        <end position="18743"/>
    </location>
</feature>
<feature type="region of interest" description="Disordered" evidence="6">
    <location>
        <begin position="19304"/>
        <end position="19331"/>
    </location>
</feature>
<feature type="region of interest" description="Disordered" evidence="6">
    <location>
        <begin position="27090"/>
        <end position="27110"/>
    </location>
</feature>
<feature type="region of interest" description="Disordered" evidence="6">
    <location>
        <begin position="31238"/>
        <end position="31267"/>
    </location>
</feature>
<feature type="region of interest" description="Disordered" evidence="6">
    <location>
        <begin position="33213"/>
        <end position="33256"/>
    </location>
</feature>
<feature type="region of interest" description="Disordered" evidence="6">
    <location>
        <begin position="33432"/>
        <end position="33463"/>
    </location>
</feature>
<feature type="region of interest" description="Disordered" evidence="6">
    <location>
        <begin position="33584"/>
        <end position="33638"/>
    </location>
</feature>
<feature type="region of interest" description="Disordered" evidence="6">
    <location>
        <begin position="33749"/>
        <end position="33777"/>
    </location>
</feature>
<feature type="coiled-coil region" evidence="2">
    <location>
        <begin position="529"/>
        <end position="561"/>
    </location>
</feature>
<feature type="coiled-coil region" evidence="2">
    <location>
        <begin position="2025"/>
        <end position="2052"/>
    </location>
</feature>
<feature type="coiled-coil region" evidence="2">
    <location>
        <begin position="3462"/>
        <end position="3487"/>
    </location>
</feature>
<feature type="coiled-coil region" evidence="2">
    <location>
        <begin position="9534"/>
        <end position="9577"/>
    </location>
</feature>
<feature type="compositionally biased region" description="Low complexity" evidence="6">
    <location>
        <begin position="1408"/>
        <end position="1419"/>
    </location>
</feature>
<feature type="compositionally biased region" description="Basic and acidic residues" evidence="6">
    <location>
        <begin position="4245"/>
        <end position="4257"/>
    </location>
</feature>
<feature type="compositionally biased region" description="Basic and acidic residues" evidence="6">
    <location>
        <begin position="9920"/>
        <end position="9938"/>
    </location>
</feature>
<feature type="compositionally biased region" description="Acidic residues" evidence="6">
    <location>
        <begin position="10041"/>
        <end position="10052"/>
    </location>
</feature>
<feature type="compositionally biased region" description="Acidic residues" evidence="6">
    <location>
        <begin position="10058"/>
        <end position="10070"/>
    </location>
</feature>
<feature type="compositionally biased region" description="Basic and acidic residues" evidence="6">
    <location>
        <begin position="10087"/>
        <end position="10101"/>
    </location>
</feature>
<feature type="compositionally biased region" description="Basic and acidic residues" evidence="6">
    <location>
        <begin position="10207"/>
        <end position="10224"/>
    </location>
</feature>
<feature type="compositionally biased region" description="Basic and acidic residues" evidence="6">
    <location>
        <begin position="10245"/>
        <end position="10265"/>
    </location>
</feature>
<feature type="compositionally biased region" description="Basic and acidic residues" evidence="6">
    <location>
        <begin position="10329"/>
        <end position="10347"/>
    </location>
</feature>
<feature type="compositionally biased region" description="Pro residues" evidence="6">
    <location>
        <begin position="10349"/>
        <end position="10360"/>
    </location>
</feature>
<feature type="compositionally biased region" description="Acidic residues" evidence="6">
    <location>
        <begin position="10418"/>
        <end position="10430"/>
    </location>
</feature>
<feature type="compositionally biased region" description="Acidic residues" evidence="6">
    <location>
        <begin position="10440"/>
        <end position="10457"/>
    </location>
</feature>
<feature type="compositionally biased region" description="Acidic residues" evidence="6">
    <location>
        <begin position="10684"/>
        <end position="10701"/>
    </location>
</feature>
<feature type="compositionally biased region" description="Basic and acidic residues" evidence="6">
    <location>
        <begin position="10702"/>
        <end position="10720"/>
    </location>
</feature>
<feature type="compositionally biased region" description="Pro residues" evidence="6">
    <location>
        <begin position="10721"/>
        <end position="10737"/>
    </location>
</feature>
<feature type="compositionally biased region" description="Basic and acidic residues" evidence="6">
    <location>
        <begin position="10882"/>
        <end position="10944"/>
    </location>
</feature>
<feature type="compositionally biased region" description="Basic and acidic residues" evidence="6">
    <location>
        <begin position="10961"/>
        <end position="10972"/>
    </location>
</feature>
<feature type="compositionally biased region" description="Basic and acidic residues" evidence="6">
    <location>
        <begin position="10989"/>
        <end position="11009"/>
    </location>
</feature>
<feature type="compositionally biased region" description="Acidic residues" evidence="6">
    <location>
        <begin position="11030"/>
        <end position="11101"/>
    </location>
</feature>
<feature type="compositionally biased region" description="Acidic residues" evidence="6">
    <location>
        <begin position="11164"/>
        <end position="11190"/>
    </location>
</feature>
<feature type="compositionally biased region" description="Basic and acidic residues" evidence="6">
    <location>
        <begin position="11388"/>
        <end position="11416"/>
    </location>
</feature>
<feature type="compositionally biased region" description="Pro residues" evidence="6">
    <location>
        <begin position="11438"/>
        <end position="11453"/>
    </location>
</feature>
<feature type="compositionally biased region" description="Basic and acidic residues" evidence="6">
    <location>
        <begin position="11454"/>
        <end position="11465"/>
    </location>
</feature>
<feature type="compositionally biased region" description="Pro residues" evidence="6">
    <location>
        <begin position="11466"/>
        <end position="11479"/>
    </location>
</feature>
<feature type="compositionally biased region" description="Pro residues" evidence="6">
    <location>
        <begin position="11496"/>
        <end position="11509"/>
    </location>
</feature>
<feature type="compositionally biased region" description="Basic and acidic residues" evidence="6">
    <location>
        <begin position="11510"/>
        <end position="11521"/>
    </location>
</feature>
<feature type="compositionally biased region" description="Basic and acidic residues" evidence="6">
    <location>
        <begin position="11538"/>
        <end position="11549"/>
    </location>
</feature>
<feature type="compositionally biased region" description="Pro residues" evidence="6">
    <location>
        <begin position="11550"/>
        <end position="11563"/>
    </location>
</feature>
<feature type="compositionally biased region" description="Pro residues" evidence="6">
    <location>
        <begin position="11580"/>
        <end position="11591"/>
    </location>
</feature>
<feature type="compositionally biased region" description="Acidic residues" evidence="6">
    <location>
        <begin position="11592"/>
        <end position="11613"/>
    </location>
</feature>
<feature type="compositionally biased region" description="Pro residues" evidence="6">
    <location>
        <begin position="11614"/>
        <end position="11626"/>
    </location>
</feature>
<feature type="compositionally biased region" description="Basic and acidic residues" evidence="6">
    <location>
        <begin position="11678"/>
        <end position="11696"/>
    </location>
</feature>
<feature type="compositionally biased region" description="Basic and acidic residues" evidence="6">
    <location>
        <begin position="11704"/>
        <end position="11715"/>
    </location>
</feature>
<feature type="compositionally biased region" description="Acidic residues" evidence="6">
    <location>
        <begin position="11730"/>
        <end position="11745"/>
    </location>
</feature>
<feature type="compositionally biased region" description="Basic and acidic residues" evidence="6">
    <location>
        <begin position="11768"/>
        <end position="11803"/>
    </location>
</feature>
<feature type="compositionally biased region" description="Basic and acidic residues" evidence="6">
    <location>
        <begin position="11816"/>
        <end position="11825"/>
    </location>
</feature>
<feature type="compositionally biased region" description="Basic and acidic residues" evidence="6">
    <location>
        <begin position="11834"/>
        <end position="11846"/>
    </location>
</feature>
<feature type="compositionally biased region" description="Basic and acidic residues" evidence="6">
    <location>
        <begin position="11854"/>
        <end position="11875"/>
    </location>
</feature>
<feature type="compositionally biased region" description="Basic and acidic residues" evidence="6">
    <location>
        <begin position="11882"/>
        <end position="11900"/>
    </location>
</feature>
<feature type="compositionally biased region" description="Basic and acidic residues" evidence="6">
    <location>
        <begin position="11927"/>
        <end position="11936"/>
    </location>
</feature>
<feature type="compositionally biased region" description="Basic and acidic residues" evidence="6">
    <location>
        <begin position="11948"/>
        <end position="11958"/>
    </location>
</feature>
<feature type="compositionally biased region" description="Pro residues" evidence="6">
    <location>
        <begin position="11960"/>
        <end position="11971"/>
    </location>
</feature>
<feature type="compositionally biased region" description="Low complexity" evidence="6">
    <location>
        <begin position="11972"/>
        <end position="11981"/>
    </location>
</feature>
<feature type="compositionally biased region" description="Basic and acidic residues" evidence="6">
    <location>
        <begin position="11982"/>
        <end position="11995"/>
    </location>
</feature>
<feature type="compositionally biased region" description="Low complexity" evidence="6">
    <location>
        <begin position="11996"/>
        <end position="12008"/>
    </location>
</feature>
<feature type="compositionally biased region" description="Polar residues" evidence="6">
    <location>
        <begin position="14223"/>
        <end position="14236"/>
    </location>
</feature>
<feature type="compositionally biased region" description="Basic and acidic residues" evidence="6">
    <location>
        <begin position="19318"/>
        <end position="19331"/>
    </location>
</feature>
<feature type="compositionally biased region" description="Pro residues" evidence="6">
    <location>
        <begin position="31252"/>
        <end position="31262"/>
    </location>
</feature>
<feature type="compositionally biased region" description="Basic and acidic residues" evidence="6">
    <location>
        <begin position="33231"/>
        <end position="33242"/>
    </location>
</feature>
<feature type="compositionally biased region" description="Basic and acidic residues" evidence="6">
    <location>
        <begin position="33439"/>
        <end position="33450"/>
    </location>
</feature>
<feature type="compositionally biased region" description="Basic and acidic residues" evidence="6">
    <location>
        <begin position="33594"/>
        <end position="33604"/>
    </location>
</feature>
<feature type="compositionally biased region" description="Low complexity" evidence="6">
    <location>
        <begin position="33625"/>
        <end position="33634"/>
    </location>
</feature>
<feature type="compositionally biased region" description="Basic and acidic residues" evidence="6">
    <location>
        <begin position="33749"/>
        <end position="33771"/>
    </location>
</feature>
<feature type="active site" description="Proton acceptor" evidence="4">
    <location>
        <position position="32298"/>
    </location>
</feature>
<feature type="binding site" evidence="4">
    <location>
        <begin position="32184"/>
        <end position="32192"/>
    </location>
    <ligand>
        <name>ATP</name>
        <dbReference type="ChEBI" id="CHEBI:30616"/>
    </ligand>
</feature>
<feature type="binding site" evidence="4">
    <location>
        <position position="32207"/>
    </location>
    <ligand>
        <name>ATP</name>
        <dbReference type="ChEBI" id="CHEBI:30616"/>
    </ligand>
</feature>
<feature type="modified residue" description="Phosphoserine" evidence="1">
    <location>
        <position position="263"/>
    </location>
</feature>
<feature type="modified residue" description="Phosphoserine" evidence="1">
    <location>
        <position position="265"/>
    </location>
</feature>
<feature type="modified residue" description="Phosphothreonine" evidence="1">
    <location>
        <position position="267"/>
    </location>
</feature>
<feature type="modified residue" description="Phosphoserine" evidence="1">
    <location>
        <position position="6920"/>
    </location>
</feature>
<feature type="modified residue" description="Phosphoserine" evidence="1">
    <location>
        <position position="9122"/>
    </location>
</feature>
<feature type="modified residue" description="Phosphoserine" evidence="1">
    <location>
        <position position="11503"/>
    </location>
</feature>
<feature type="modified residue" description="Phosphothreonine" evidence="1">
    <location>
        <position position="12007"/>
    </location>
</feature>
<feature type="modified residue" description="Phosphoserine" evidence="1">
    <location>
        <position position="12009"/>
    </location>
</feature>
<feature type="modified residue" description="Phosphoserine" evidence="1">
    <location>
        <position position="12022"/>
    </location>
</feature>
<feature type="modified residue" description="Phosphothreonine" evidence="1">
    <location>
        <position position="30443"/>
    </location>
</feature>
<feature type="modified residue" description="Phosphotyrosine" evidence="34">
    <location>
        <position position="32341"/>
    </location>
</feature>
<feature type="modified residue" description="Phosphoserine" evidence="1">
    <location>
        <position position="33245"/>
    </location>
</feature>
<feature type="modified residue" description="Phosphoserine" evidence="1">
    <location>
        <position position="33247"/>
    </location>
</feature>
<feature type="modified residue" description="Phosphoserine" evidence="1">
    <location>
        <position position="33602"/>
    </location>
</feature>
<feature type="modified residue" description="Phosphoserine" evidence="1">
    <location>
        <position position="33614"/>
    </location>
</feature>
<feature type="disulfide bond" evidence="3">
    <location>
        <begin position="964"/>
        <end position="1015"/>
    </location>
</feature>
<feature type="disulfide bond" evidence="3">
    <location>
        <begin position="1724"/>
        <end position="1777"/>
    </location>
</feature>
<feature type="disulfide bond" evidence="3 10">
    <location>
        <begin position="2109"/>
        <end position="2134"/>
    </location>
</feature>
<feature type="disulfide bond" evidence="3">
    <location>
        <begin position="2196"/>
        <end position="2246"/>
    </location>
</feature>
<feature type="disulfide bond" evidence="3">
    <location>
        <begin position="3259"/>
        <end position="3311"/>
    </location>
</feature>
<feature type="disulfide bond" evidence="3">
    <location>
        <begin position="4404"/>
        <end position="4455"/>
    </location>
</feature>
<feature type="disulfide bond" evidence="3">
    <location>
        <begin position="4499"/>
        <end position="4550"/>
    </location>
</feature>
<feature type="disulfide bond" evidence="3">
    <location>
        <begin position="4592"/>
        <end position="4643"/>
    </location>
</feature>
<feature type="disulfide bond" evidence="3">
    <location>
        <begin position="4686"/>
        <end position="4737"/>
    </location>
</feature>
<feature type="disulfide bond" evidence="3">
    <location>
        <begin position="4779"/>
        <end position="4830"/>
    </location>
</feature>
<feature type="disulfide bond" evidence="3">
    <location>
        <begin position="5061"/>
        <end position="5112"/>
    </location>
</feature>
<feature type="disulfide bond" evidence="3">
    <location>
        <begin position="5248"/>
        <end position="5299"/>
    </location>
</feature>
<feature type="disulfide bond" evidence="3">
    <location>
        <begin position="5623"/>
        <end position="5674"/>
    </location>
</feature>
<feature type="disulfide bond" evidence="3">
    <location>
        <begin position="5810"/>
        <end position="5861"/>
    </location>
</feature>
<feature type="disulfide bond" evidence="3">
    <location>
        <begin position="5903"/>
        <end position="5954"/>
    </location>
</feature>
<feature type="disulfide bond" evidence="3">
    <location>
        <begin position="6185"/>
        <end position="6236"/>
    </location>
</feature>
<feature type="disulfide bond" evidence="3">
    <location>
        <begin position="6372"/>
        <end position="6423"/>
    </location>
</feature>
<feature type="disulfide bond" evidence="3">
    <location>
        <begin position="6465"/>
        <end position="6516"/>
    </location>
</feature>
<feature type="disulfide bond" evidence="3">
    <location>
        <begin position="6748"/>
        <end position="6799"/>
    </location>
</feature>
<feature type="disulfide bond" evidence="3">
    <location>
        <begin position="7027"/>
        <end position="7078"/>
    </location>
</feature>
<feature type="disulfide bond" evidence="3">
    <location>
        <begin position="7123"/>
        <end position="7174"/>
    </location>
</feature>
<feature type="disulfide bond" evidence="3">
    <location>
        <begin position="7219"/>
        <end position="7270"/>
    </location>
</feature>
<feature type="disulfide bond" evidence="3">
    <location>
        <begin position="7313"/>
        <end position="7364"/>
    </location>
</feature>
<feature type="disulfide bond" evidence="3">
    <location>
        <begin position="7406"/>
        <end position="7457"/>
    </location>
</feature>
<feature type="disulfide bond" evidence="3">
    <location>
        <begin position="7689"/>
        <end position="7740"/>
    </location>
</feature>
<feature type="disulfide bond" evidence="3">
    <location>
        <begin position="7968"/>
        <end position="8019"/>
    </location>
</feature>
<feature type="disulfide bond" evidence="3">
    <location>
        <begin position="8064"/>
        <end position="8115"/>
    </location>
</feature>
<feature type="disulfide bond" evidence="3">
    <location>
        <begin position="8160"/>
        <end position="8211"/>
    </location>
</feature>
<feature type="disulfide bond" evidence="3">
    <location>
        <begin position="8254"/>
        <end position="8305"/>
    </location>
</feature>
<feature type="disulfide bond" evidence="3">
    <location>
        <begin position="8347"/>
        <end position="8398"/>
    </location>
</feature>
<feature type="disulfide bond" evidence="3">
    <location>
        <begin position="8630"/>
        <end position="8681"/>
    </location>
</feature>
<feature type="disulfide bond" evidence="3">
    <location>
        <begin position="8909"/>
        <end position="8960"/>
    </location>
</feature>
<feature type="disulfide bond" evidence="3">
    <location>
        <begin position="9005"/>
        <end position="9056"/>
    </location>
</feature>
<feature type="disulfide bond" evidence="3">
    <location>
        <begin position="9101"/>
        <end position="9152"/>
    </location>
</feature>
<feature type="disulfide bond" evidence="3">
    <location>
        <begin position="9294"/>
        <end position="9345"/>
    </location>
</feature>
<feature type="disulfide bond" evidence="3">
    <location>
        <begin position="9693"/>
        <end position="9743"/>
    </location>
</feature>
<feature type="disulfide bond" evidence="3">
    <location>
        <begin position="12067"/>
        <end position="12117"/>
    </location>
</feature>
<feature type="disulfide bond" evidence="3">
    <location>
        <begin position="12611"/>
        <end position="12660"/>
    </location>
</feature>
<feature type="disulfide bond" evidence="3">
    <location>
        <begin position="12966"/>
        <end position="13016"/>
    </location>
</feature>
<feature type="disulfide bond" evidence="3">
    <location>
        <begin position="13233"/>
        <end position="13283"/>
    </location>
</feature>
<feature type="disulfide bond" evidence="3">
    <location>
        <begin position="13322"/>
        <end position="13372"/>
    </location>
</feature>
<feature type="disulfide bond" evidence="3">
    <location>
        <begin position="13411"/>
        <end position="13461"/>
    </location>
</feature>
<feature type="disulfide bond" evidence="3">
    <location>
        <begin position="13771"/>
        <end position="13821"/>
    </location>
</feature>
<feature type="disulfide bond" evidence="3">
    <location>
        <begin position="31481"/>
        <end position="31532"/>
    </location>
</feature>
<feature type="disulfide bond" evidence="3">
    <location>
        <begin position="32516"/>
        <end position="32568"/>
    </location>
</feature>
<feature type="disulfide bond" evidence="3">
    <location>
        <begin position="33664"/>
        <end position="33718"/>
    </location>
</feature>
<feature type="splice variant" id="VSP_019138" description="In isoform 2." evidence="38">
    <location>
        <begin position="555"/>
        <end position="646"/>
    </location>
</feature>
<feature type="splice variant" id="VSP_019139" description="In isoform 3, isoform 9 and isoform 10." evidence="36 37">
    <location>
        <begin position="556"/>
        <end position="601"/>
    </location>
</feature>
<feature type="splice variant" id="VSP_045935" description="In isoform 12." evidence="39">
    <original>E</original>
    <variation>EGFSKFEENTSNSQWHVSLSVSFKKEPLGQKPSFIQPLSSLRVHNGETVRFHARVSGIPKPEIQWFHNQQLILPTKDVVFHFEESTGMALMLIVDAYSEHAGQYSCKAANSAGEATCAATLTVTPKVQALDRQSSGKDVRESTKSQAVADSSFTKEESKISQKEIKSFQGSSYEYEVQVFESVSQSSIHTAASVQDTQLCHTASLSQIAESTELSKECAKESTGEAPKIFLHLQDVTVKCGDTAQFLCVLKDDSFIDVTWTHEGAKIEESERLKQSQNGNIQFLTICNVQLVDQGLYSCIVHNDCGERTTSAVLSVEG</variation>
    <location>
        <position position="3434"/>
    </location>
</feature>
<feature type="splice variant" id="VSP_019140" description="In isoform 8 and isoform 10." evidence="39">
    <original>E</original>
    <variation>EGFSKFEENTSNSQWHVSLSVSFKKEPLGQKPSFIQPLSSLRVHNGETVRFHARVSGIPKPEIQWFHNQQLILPTKDVVFHFEESTGMALMLIVDAYSEHAGQYSCKAANSAGEATCAATLTVTPK</variation>
    <location>
        <position position="3434"/>
    </location>
</feature>
<feature type="splice variant" id="VSP_042903" description="In isoform 9." evidence="39">
    <original>E</original>
    <variation>EVQALDRQSSGKDVRESAKSQAVADSSFTKEESKISQKEIKSFQGSSYEYEVQVFESVSQSSIHTAASVQDTQLCHTASLSQIAESTELSKECAKESTGEAPKIFLHLQDVTVKCGDTAQFLCVLKDDSFIDVTWTHEGAKIEESERLKQSQNGNIQFLTICNVQLVDQGLYSCIVHNDCGERTTSAVLSVEG</variation>
    <location>
        <position position="3434"/>
    </location>
</feature>
<feature type="splice variant" id="VSP_019141" description="In isoform 7." evidence="39">
    <original>APESILHERIEQEIEMEMKEFSSSFLSAEEEGLHSAELQLSKINETLELLSESPVYPTKFDSEKEGTGPIFIKEVSNADISMGDVATLSVTVIGIPKPKIQWFFNGVLLTPSADYKFVFDGDDHSLIILFTKLEDEGEYTCMASNDYGKTICSAYLKINSKGEGHKDTETESAVAKSLEKLGGPCPPHFLKELKPIRCAQGLPAIFEYTVV</original>
    <variation>VQALDRQSSGKDVRESTKSQAVADSSFTKEESKISQKEIKSFQGSSYEYEVQVFESVSQSSIHTAASVQDTQLCHTASLSQIAESTELSKECAKESTGEAPKIFLHLQDVTVKCGDTAQFLCVLKDDSFIDVTWTHEGAKIEESERLKQSQNGNIQFLTICNVQLVDQGLYSCIVHNDCGERTTSAVLSVEGAPESILHERIEQEIEMEMK</variation>
    <location>
        <begin position="3435"/>
        <end position="3645"/>
    </location>
</feature>
<feature type="splice variant" id="VSP_019142" description="In isoform 4 and isoform 11." evidence="37">
    <location>
        <begin position="3454"/>
        <end position="4380"/>
    </location>
</feature>
<feature type="splice variant" id="VSP_019143" description="In isoform 6." evidence="39">
    <original>FSSSFLSAEEEGLHSAELQLSKINETLELLSESPVYPTKFDSEKEGTGPIFIKEVSNADISMGDVATLSVTVIGIPKPKIQWFFNGVLLTPSADYKFVFDGDDHSLIILFTKLEDEGEYTCMASNDYGKTICSAYLKINSKGEGHKDTETESAVAKSLEKLGGPCPPHFLKELKPIRCAQGLPAIFEYTVVGEPAPTVTWFKENKQLCTSVYYTIIHNPNGSGTFIVNDPQREDSGLYICKAENMLGESTCAAELLVLLEDTDMTDTPCKAKSTPEAPEDFPQTPLKGPAVEALDSEQEIATFVKDTILKAALITEENQQLSYEHIAKANELSSQLPLGAQELQSILEQDKLTPESTREFLCINGSIHFQPLKEPSPNLQLQIVQSQKTFSKEGILMPEEPETQAVLSDTEKIFPSAMSIEQINSLTVEPLKTLLAEPEGNYPQSSIEPPMHSYLTSVAEEVLSPKEKTVSDTNREQRVTLQKQEAQSALILSQSLAEGHVESLQSPDVMISQVNYEPLVPSEHSCTEGGKILIESANPLENAGQDSAVRIEEGKSLRFPLALEEKQVLLKEEHSDNVVMPPDQIIESKREPVAIKKVQEVQGRDLLSKESLLSGIPEEQRLNLKIQICRALQAAVASEQPGLFSEWLRNIEKVEVEAVNITQEPRHIMCMYLVTSAKSVTEEVTIIIEDVDPQMANLKMELRDALCAIIYEEIDILTAEGPRIQQGAKTSLQEEMDSFSGSQKVEPITEPEVESKYLISTEEVSYFNVQSRVKYLDATPVTKGVASAVVSDEKQDESLKPSEEKEESSSESGTEEVATVKIQEAEGGLIKEDGPMIHTPLVDTVSEEGDIVHLTTSITNAKEVNWYFENKLVPSDEKFKCLQDQNTYTLVIDKVNTEDHQGEYVCEALNDSGKTATSAKLTVVKRAAPVIKRKIEPLEVALGHLAKFTCEIQSAPNVRFQWFKAGREIYESDKCSIRSSKYISSLEILRTQVVDCGEYTCKASNEYGSVSCTATLTVTEAYPPTFLSRPKSLTTFVGKAAKFICTVTGTPVIETIWQKDGAALSPSPNWRISDAENKHILELSNLTIQDRGVYSCKASNKFGADICQAELIIIDKPHFIKELEPVQSAINKKVHLECQVDEDRKVTVTWSKDGQKLPPGKDYKICFEDKIATLEIPLAKLKDSGTYVCTASNEAGSSSCSATVTVREPPSFVKKVDPSYLMLPGESARLHCKLKGSPVIQVTWFKNNKELSESNTVRMYFVNSEAILDITDVKVEDSGSYSCEAVNDVGSDSCSTEIVIKEPPSFIKTLEPADIVRGTNALLQCEVSGTGPFEISWFKDKKQIRSSKKYRLFSQKSLVCLEIFSFNSADVGEYECVVANEVGKCGCMATHLLKEPPTFVKKVDDLIALGGQTVTLQAAVRGSEPISVTWMKGQEVIREDGKIKMSFSNGVAVLIIPDVQISFGGKYTCLAENEAGSQTSVGELIVKEPAKIIERAELIQVTAGDPATLEYTVAGTPELKPKWYKDGRPLVASKKYRISFKNNVAQLKFYSAELHDSGQYTFEISNEVGSSSCETTFTVLDRDIAPFFTKPLRNVDSVVNGTCRLDCKIAGSLPMRVSWFKDGKEIAASDRYRIAFVEGTASLEIIRVDMNDAGNFTCRATNSVGSKDSSGALIVQEPPSFVTKPGSKDVLPGSAVCLKSTFQGSTPLTIRWFKGNKELVSGGSCYITKEALESSLELYLVKTSDSGTYTCKVSNVAGGVECSANLFVKEPATFVEKLEPSQLLKKGDATQLACKVTGTPPIKITWFANDREIKESSKHRMSFVESTAVLRLTDVGIEDSGEYMCEAQNEAGSDHCSSIVIVKESPYFTKEFKPIEVLKEYDVMLLAEVAGTPPFEITWFKDNTILRSGRKYKTFIQDHLVSLQILKFVAADAGEYQCRVTNEVGSSICSARVTLREPPSFIKKIESTSSLRGGTAAFQATLKGSLPITVTWLKDSDEITEDDNIRMTFENNVASLYLSGIEVKHDGKYVCQAKNDAGIQRCSALLSVKEPATITEEAVSIDVTQGDPATLQVKFSGTKEITAKWFKDGQELTLGSKYKISVTDTVSILKIISTEKKDSGEYTFEVQNDVGRSSCKARINVLDLIIPPSF</original>
    <variation>LFSEGESEHSERDTRDAFSDSEDIDHKSMAAKRYASRISSTSSWPEYFKPSFTQKLTFKYVLEGEPVVFTCRLIACPTPEMTWFHNNRPIPTGLRRIIKAESDLHHHSSSLEIKRVQDRDSGSYRLLAINSEGSAESTASLLVIQKGQDEKYLEFLKRAERTHENVEALVERGEDRIKVDLRFTGSPFNKKQDVEQKGMMRTIHFKTMSSAKKTDYMYDEEYLESKSDIRGWLNVGESFLDKETKVKLQRLREARKTLMEKKKLSLLDTSSEISSRTLRSEASDKDILFSREDMKIRSMSDLAESYKVDHSAESIVQNPHALSNQMDQNIESEELPTSFQTIVDEEIFQTEIRMSQEALVKESLPKDHLYGEILVNENTQARGQLEEIMANTTIGESSTYITNVCEKEEVYETPENVSQAITPHASESFGTLVNVEESEEIASERIKKDDLRELQLSASTRIDEFKTEQKEENMRFFENSFRKRPQRCPPSFLQEIESQEVYEGDSCNFVCHFQGYPQPIVTWYNNDMPIPRNQNFIIHSLENYSILTLSSVHHQNEGSITCVLFNQYGTVKTTSMLKVKAKQKHDVKAHKVPVFHDYLDEEEELALVFDQAKGAHPSMSQEGQTNLHLLKTNPPVPPSGDTELLSFPVEIQVTAATPIPEQDKESKEVFQTEELEPKAMPQDQVTQSPKHRFVFLSDITNEPPKMLQEMPKHARCREGDSIILECLISGEPQPVVTWFQNGVLLKQNQKFQFEEVNCSHQLYIKDVNSQDSGKYKCVAENNSGAVESVSDLTVEPVTYRENSQFENIGEIYGKYSRDQQLQDQGESVRAHFYDYPAGPFTPWTNVKEYSVRDYFQSLETIEQIDQKEQVRCIPSREKIPRFVHGASRTIKISKPIRAEFIQCQAEGKERHVSEKSKLHQAEGTVYPFVDDFSDVTIKKEIRNNFGKLGRSEKENVQECAQSDYLPNIHSERISDSYNTKDSSAIVYEESLGEEIHYPGKKVKHRIIEFEKLHVEKGVLEKRPTRTSIVNPPQKKIDDKAFSLKQRESRSSNLNANMYQAEKMSPNTESDSSNIAINLKLLSSQTHKEFDAQEREQQEKISLIDKPAISKRAEHESPITFDLKQFHTQIKHTDVKFQELDSGQPEEAYFKIQHPADTENIVFDLKQMYSHIGDPALEFQGQETREQQEIHYKEKIPSPETLQPDTHNISKSVQNNVFASQEISSSQELSNRTMVEKSSIDENSISLEKEVRHVQEQNLDILKTDLSLKSFSEEIYSESCALLPTSSADIEETDLSEKSCPLENGGRSSISHLKKAASEEKPLGVGEMEEECTLEPELAAFPKQDGGTQEYTDATLEDHRGDVQEADTLHRQLSLSQCFPLLMTEEQQNPGEQISTNIHASGEEKCYEEVQVQNEASFSTLEGEMIETSFSQNIPKLDEAHTTEAAESETSLTQYLLAAGKREVPETKDTRDQAKLVQSESITSMEVEEVTFNTVYEYYNQKQESLGRPLSPESDISIGVGSTTSEEISELDQFYTPPSSVEYFESPKSPDLYFNPSDITKQSSIHSGGETVERYSTPLGEVAERYSTPSEGEVGERYSTPPGETLERYSTPPGETLERYSTPPGETLERYSTPPGETLERYSTPPGETLERYSTPPGEALERYSIPTGGPNPTGTFKTYPSKIEREDGTPNEHFYTPTEERGSAYEIWRSDSFGTPNEAIEPKDNEMPPSFIEPLTKRKVYENTTLGFIVEVEGLPVPGVKWYRNKSLLEPDERIKMERVGNVCSLEISNIQKGEGGEYMCHAVNIIGEAKSFANVDIMPQEERVVALPPPVTHQHVMEFDLEHTTSSRTPSPQEIVLEVELSEKDVKEFEKQVKIVTVPEFTPDHKSMIVSLDVLPFNFVDPNMDSREGEDKELKIDLEVFEMPPRFIMPICDFKIPENSDAVFKCSVIGIPTPEVKWYKEYMCIEPDNIKYVISEEKGSHTLKIRNVCLSDSATYRCRAVNCVGEAICRGFLTMGDSEIFAVIAKKSKVTLSSLMEELVLKSNYTDSFFEFQVVEGPPRFIKGISDCYAPIGTAAYFQCLVRGSPRPTVYWYKDGKLVQGRRFTVEESGTGFHNLFITSLVKSDEGEYRCVATNKSGMAESFAALTLT</variation>
    <location>
        <begin position="3455"/>
        <end position="5604"/>
    </location>
</feature>
<feature type="splice variant" id="VSP_019144" description="In isoform 7." evidence="39">
    <location>
        <begin position="3646"/>
        <end position="4380"/>
    </location>
</feature>
<feature type="splice variant" id="VSP_019145" description="In isoform 3, isoform 9 and isoform 10." evidence="36 37">
    <location>
        <begin position="4474"/>
        <end position="11851"/>
    </location>
</feature>
<feature type="splice variant" id="VSP_019146" description="In isoform 6." evidence="39">
    <location>
        <begin position="5605"/>
        <end position="34350"/>
    </location>
</feature>
<feature type="splice variant" id="VSP_019147" description="In isoform 5." evidence="35">
    <location>
        <begin position="10382"/>
        <end position="10645"/>
    </location>
</feature>
<feature type="splice variant" id="VSP_019148" description="In isoform 5." evidence="35">
    <location>
        <begin position="10742"/>
        <end position="10931"/>
    </location>
</feature>
<feature type="splice variant" id="VSP_019149" description="In isoform 5." evidence="35">
    <location>
        <begin position="11015"/>
        <end position="11163"/>
    </location>
</feature>
<feature type="splice variant" id="VSP_045929" description="In isoform 12." evidence="39">
    <original>I</original>
    <variation>VPKKPVPEKKVPVPAPKKVEPPPPPKVPEI</variation>
    <location>
        <position position="11117"/>
    </location>
</feature>
<feature type="splice variant" id="VSP_045930" description="In isoform 12." evidence="39">
    <original>E</original>
    <variation>EAPPAKVSVVPKKPEPEKKVPPPGLKKAV</variation>
    <location>
        <position position="11133"/>
    </location>
</feature>
<feature type="splice variant" id="VSP_019150" description="In isoform 5." evidence="35">
    <location>
        <begin position="11223"/>
        <end position="11852"/>
    </location>
</feature>
<feature type="splice variant" id="VSP_045931" description="In isoform 12." evidence="39">
    <original>K</original>
    <variation>KAPEVPKKIVPEEKVREAVLKKPEVPPAKVPGMPKKSVQEEKSPIVISEDTEMYIYEASEEAVLEEKVLVTQPQKTKPKLAKVPEPPKKVVPEDKIYVTIPKKRETPATKEPDTTRGIFPEVEPPEAIPEIPEHPPTEEFEVFKEVIPEGETPIVKRRKTPSPTVPESPREIVPVKETPMAAPLEIEIPPTKAPEAMKEVVPEMKIFEDVPEEPETPRMKTPEAPQEIIPAKTVPSKKREPPSVKVPEALQEIVPEKKTLVVPLRKPEVLPDEVPEALREVVPEKKVHPPQRAEVVPVKVHEAPKEIIPEKKVSVVPPKKPEVPPVKVPEASKEVIREEKVPLAPPKEPEVPPVKVPEPPKEVVPEKKAPVAPPKEPEVPPVKVPEAPKEVVPEKKVPVPPPKKPEVPPTKVPEVPKAAVPEKKLPEAIPPKPESPPPE</variation>
    <location>
        <position position="11421"/>
    </location>
</feature>
<feature type="splice variant" id="VSP_045932" description="In isoform 12." evidence="39">
    <original>P</original>
    <variation>PKVPEAPKEVVLEKKASVAVPKKPEAPRAKVPEAAQEVVPEKKIPKAPIKKPEAPAVTVPEVPQEATEKEIPVAPPKKPEAPIVPVPEAQEVVPEKKVPKAPPTKPEAPPATVPEVPQEIVPEKKTLVLPKKPEVPPVTVPEAPKEVVLEKKVPSAPPKKPEVPPV</variation>
    <location>
        <position position="11450"/>
    </location>
</feature>
<feature type="splice variant" id="VSP_045933" description="In isoform 12." evidence="39">
    <original>E</original>
    <variation>EVPEVLPPKEVVPEKKVPVPPAKKPEAPPPKVPEAPKEVVLEKKASVAVPKKPEAPRAKVPEAAQEVVPEKKIPKAPIKKPEAPAVTVPEVPQEAAEKEIPVAPPKKPEAPIVPVPEAQEVVPEKKVPKAPPTKPEAPPATVPEVPQEIVPEKKTLVLPKKPEVPPVTVPEAPKEVVLEKKVPSTPPKKPEVPPVKVPEAPKEVVPEKKVPVPPPKKPEVPPTKVPEVPKAAVPEKKVPEAIPPKPESPPPEVPEVLPPKEVVPEKKVPVPPAKKPEAPPPKVPEAPKEVVLEKKVSVAVPKKPEAPRAKVPEAAQEVVPEKKIPKAPIKKPEAPAVTVPEVPQEAAEKEIPVAPPKKPEAPIVPVPEAQEVVPEKKVPKAPPTKPEAPPATVPEVPQEIVPEKKTLVLPKKPEVPPVTVPEAPKEVVLEKKVPLAPPKKPEVPPVKVPEAPKEVVPEKKVPVTPPKKPEVPPVKVPEAPIEVVPEKKMPLAPPKKPEVPPVKVPEAPKEVVPEKKVPSAPPKKPEVPPVK</variation>
    <location>
        <position position="11507"/>
    </location>
</feature>
<feature type="splice variant" id="VSP_019151" description="In isoform 4." evidence="37">
    <original>E</original>
    <variation>EVFEEPEESPSAPPKKPEVPPVR</variation>
    <location>
        <position position="11507"/>
    </location>
</feature>
<feature type="splice variant" id="VSP_047142" description="In isoform 13." evidence="39">
    <original>P</original>
    <variation>PKEPEMPKKVVPVKKVPTVKKPETPAAKVPEVPKKLVPVKKEPVPVTKKPEVLPEKVPKVPEKIIPEKEVSVPIPAEPEVPPAEVEETPEEIIYEEKASITIGRKETPPVEEREIEKYIKPEEPEPEPQPEEIPV</variation>
    <location>
        <position position="11790"/>
    </location>
</feature>
<feature type="splice variant" id="VSP_045934" description="In isoform 12." evidence="39">
    <original>P</original>
    <variation>PEMPKKVVPVKKVPTVKKPETPAAKVPEVPKKLVPVKKEPVPVTKKPEVLPEKVPKVPEKIIPEKEVSVPIPAEPEVPPAEVEETPEEIIYEEKASITIGRKETPPVEEREIEKYIKPEEPEPEPQPEEIPVKEP</variation>
    <location>
        <position position="11793"/>
    </location>
</feature>
<feature type="splice variant" id="VSP_019152" description="In isoform 5." evidence="35">
    <location>
        <begin position="11985"/>
        <end position="12201"/>
    </location>
</feature>
<feature type="sequence variant" id="VAR_026685" description="In CMD1G; affects interaction with TCAP/telethonin; dbSNP:rs139517732." evidence="13">
    <original>V</original>
    <variation>M</variation>
    <location>
        <position position="54"/>
    </location>
</feature>
<feature type="sequence variant" id="VAR_040078" description="In dbSNP:rs35683768." evidence="26">
    <original>D</original>
    <variation>Y</variation>
    <location>
        <position position="60"/>
    </location>
</feature>
<feature type="sequence variant" id="VAR_040079" description="In a metastatic melanoma sample; somatic mutation; dbSNP:rs564777385." evidence="26">
    <original>V</original>
    <variation>M</variation>
    <location>
        <position position="115"/>
    </location>
</feature>
<feature type="sequence variant" id="VAR_026634" description="In MFM9; disrupts NBR1-binding; dbSNP:rs138060032." evidence="21">
    <original>R</original>
    <variation>W</variation>
    <location>
        <position position="279"/>
    </location>
</feature>
<feature type="sequence variant" id="VAR_026686" description="In dbSNP:rs16866538." evidence="13 26">
    <original>R</original>
    <variation>C</variation>
    <location>
        <position position="328"/>
    </location>
</feature>
<feature type="sequence variant" id="VAR_040080" description="In dbSNP:rs56128843." evidence="26">
    <original>R</original>
    <variation>T</variation>
    <location>
        <position position="360"/>
    </location>
</feature>
<feature type="sequence variant" id="VAR_040081" description="In dbSNP:rs72647851." evidence="26 31">
    <original>V</original>
    <variation>I</variation>
    <location>
        <position position="498"/>
    </location>
</feature>
<feature type="sequence variant" id="VAR_026687" description="In CMH9; dbSNP:rs28933405." evidence="8">
    <original>R</original>
    <variation>L</variation>
    <location>
        <position position="740"/>
    </location>
</feature>
<feature type="sequence variant" id="VAR_026688" description="In CMD1G; affects interaction with TCAP/telethonin; dbSNP:rs267607157." evidence="13">
    <original>A</original>
    <variation>V</variation>
    <location>
        <position position="743"/>
    </location>
</feature>
<feature type="sequence variant" id="VAR_040082" description="In a colorectal adenocarcinoma sample; somatic mutation; dbSNP:rs149061352." evidence="26">
    <original>T</original>
    <variation>M</variation>
    <location>
        <position position="799"/>
    </location>
</feature>
<feature type="sequence variant" id="VAR_040083" description="In dbSNP:rs35813871." evidence="26">
    <original>T</original>
    <variation>I</variation>
    <location>
        <position position="811"/>
    </location>
</feature>
<feature type="sequence variant" id="VAR_040084" description="In dbSNP:rs56046320." evidence="26">
    <original>R</original>
    <variation>H</variation>
    <location>
        <position position="922"/>
    </location>
</feature>
<feature type="sequence variant" id="VAR_040085" description="In a gastric adenocarcinoma sample; somatic mutation." evidence="26">
    <original>E</original>
    <variation>D</variation>
    <location>
        <position position="937"/>
    </location>
</feature>
<feature type="sequence variant" id="VAR_026689" description="In CMD1G; dbSNP:rs267607155." evidence="12">
    <original>W</original>
    <variation>R</variation>
    <location>
        <position position="976"/>
    </location>
</feature>
<feature type="sequence variant" id="VAR_040086" description="In dbSNP:rs55914517." evidence="26">
    <original>A</original>
    <variation>T</variation>
    <location>
        <position position="1081"/>
    </location>
</feature>
<feature type="sequence variant" id="VAR_040087" description="In dbSNP:rs72647870." evidence="26">
    <original>G</original>
    <variation>R</variation>
    <location>
        <position position="1137"/>
    </location>
</feature>
<feature type="sequence variant" id="VAR_040088" description="In dbSNP:rs10497520." evidence="26 31">
    <original>K</original>
    <variation>E</variation>
    <location>
        <position position="1201"/>
    </location>
</feature>
<feature type="sequence variant" id="VAR_040089" description="In dbSNP:rs150667217." evidence="26">
    <original>V</original>
    <variation>A</variation>
    <location>
        <position position="1202"/>
    </location>
</feature>
<feature type="sequence variant" id="VAR_056081" description="In dbSNP:rs1552280.">
    <original>S</original>
    <variation>L</variation>
    <location>
        <position position="1249"/>
    </location>
</feature>
<feature type="sequence variant" id="VAR_040090" description="In dbSNP:rs1552280." evidence="9 11 26">
    <original>S</original>
    <variation>L</variation>
    <location>
        <position position="1295"/>
    </location>
</feature>
<feature type="sequence variant" id="VAR_040091" description="In dbSNP:rs36021856." evidence="26">
    <original>G</original>
    <variation>D</variation>
    <location>
        <position position="1345"/>
    </location>
</feature>
<feature type="sequence variant" id="VAR_040092" description="In a metastatic melanoma sample; somatic mutation; dbSNP:rs267599092." evidence="26">
    <original>A</original>
    <variation>T</variation>
    <location>
        <position position="1347"/>
    </location>
</feature>
<feature type="sequence variant" id="VAR_040093" description="In a gastric adenocarcinoma sample; somatic mutation; dbSNP:rs539470256." evidence="26">
    <original>R</original>
    <variation>H</variation>
    <location>
        <position position="1350"/>
    </location>
</feature>
<feature type="sequence variant" id="VAR_040094" description="In dbSNP:rs36062108." evidence="26">
    <original>V</original>
    <variation>L</variation>
    <location>
        <position position="1353"/>
    </location>
</feature>
<feature type="sequence variant" id="VAR_040095" description="In dbSNP:rs16866531." evidence="26">
    <original>I</original>
    <variation>V</variation>
    <location>
        <position position="1393"/>
    </location>
</feature>
<feature type="sequence variant" id="VAR_040096" description="In dbSNP:rs72647875." evidence="26">
    <original>R</original>
    <variation>C</variation>
    <location>
        <position position="1416"/>
    </location>
</feature>
<feature type="sequence variant" id="VAR_040097" description="In dbSNP:rs72647876." evidence="26">
    <original>R</original>
    <variation>P</variation>
    <location>
        <position position="1441"/>
    </location>
</feature>
<feature type="sequence variant" id="VAR_040098" description="In dbSNP:rs72647877." evidence="26">
    <original>I</original>
    <variation>V</variation>
    <location>
        <position position="1544"/>
    </location>
</feature>
<feature type="sequence variant" id="VAR_040099" description="In dbSNP:rs12476289." evidence="9 11 26">
    <original>R</original>
    <variation>Q</variation>
    <location>
        <position position="1572"/>
    </location>
</feature>
<feature type="sequence variant" id="VAR_040100" description="In dbSNP:rs56270960." evidence="26">
    <original>R</original>
    <variation>G</variation>
    <location>
        <position position="1658"/>
    </location>
</feature>
<feature type="sequence variant" id="VAR_040101" description="In an ovarian mucinous carcinoma sample; somatic mutation; dbSNP:rs375029799." evidence="26">
    <original>R</original>
    <variation>Q</variation>
    <location>
        <position position="1664"/>
    </location>
</feature>
<feature type="sequence variant" id="VAR_040102" description="In a lung squamous cell carcinoma sample; somatic mutation; dbSNP:rs370004591." evidence="26">
    <original>G</original>
    <variation>D</variation>
    <location>
        <position position="1692"/>
    </location>
</feature>
<feature type="sequence variant" id="VAR_040103" description="In dbSNP:rs75686037." evidence="26">
    <original>P</original>
    <variation>L</variation>
    <location>
        <position position="1744"/>
    </location>
</feature>
<feature type="sequence variant" id="VAR_040104" description="In dbSNP:rs150725992." evidence="26">
    <original>S</original>
    <variation>G</variation>
    <location>
        <position position="1772"/>
    </location>
</feature>
<feature type="sequence variant" id="VAR_040105" description="In a colorectal adenocarcinoma sample; somatic mutation." evidence="26">
    <original>T</original>
    <variation>I</variation>
    <location>
        <position position="1907"/>
    </location>
</feature>
<feature type="sequence variant" id="VAR_040106" description="In dbSNP:rs144135510." evidence="26">
    <original>R</original>
    <variation>H</variation>
    <location>
        <position position="1998"/>
    </location>
</feature>
<feature type="sequence variant" id="VAR_040107" description="In a colorectal adenocarcinoma sample; somatic mutation." evidence="26">
    <original>P</original>
    <variation>L</variation>
    <location>
        <position position="2107"/>
    </location>
</feature>
<feature type="sequence variant" id="VAR_040108" description="In dbSNP:rs56404770." evidence="26">
    <original>I</original>
    <variation>T</variation>
    <location>
        <position position="2118"/>
    </location>
</feature>
<feature type="sequence variant" id="VAR_040109" description="In dbSNP:rs56285559." evidence="26">
    <original>A</original>
    <variation>T</variation>
    <location>
        <position position="2164"/>
    </location>
</feature>
<feature type="sequence variant" id="VAR_040110" evidence="26">
    <original>D</original>
    <variation>Y</variation>
    <location>
        <position position="2240"/>
    </location>
</feature>
<feature type="sequence variant" id="VAR_040111" description="In dbSNP:rs4894048." evidence="26">
    <original>G</original>
    <variation>S</variation>
    <location>
        <position position="2392"/>
    </location>
</feature>
<feature type="sequence variant" id="VAR_040112" description="In a lung neuroendocrine carcinoma sample; somatic mutation; dbSNP:rs571572592." evidence="26">
    <original>L</original>
    <variation>F</variation>
    <location>
        <position position="2432"/>
    </location>
</feature>
<feature type="sequence variant" id="VAR_040113" description="In dbSNP:rs56142888." evidence="9 11 26">
    <original>M</original>
    <variation>I</variation>
    <location>
        <position position="2610"/>
    </location>
</feature>
<feature type="sequence variant" id="VAR_040114" description="In a breast infiltrating ductal carcinoma sample; somatic mutation; dbSNP:rs576644663." evidence="26">
    <original>I</original>
    <variation>M</variation>
    <location>
        <position position="2771"/>
    </location>
</feature>
<feature type="sequence variant" id="VAR_040115" description="In dbSNP:rs33917087." evidence="26">
    <original>V</original>
    <variation>F</variation>
    <location>
        <position position="2823"/>
    </location>
</feature>
<feature type="sequence variant" id="VAR_040116" description="In dbSNP:rs2306636." evidence="9 11 26">
    <original>S</original>
    <variation>N</variation>
    <location>
        <position position="2831"/>
    </location>
</feature>
<feature type="sequence variant" id="VAR_040117" description="In dbSNP:rs56373393." evidence="26">
    <original>V</original>
    <variation>I</variation>
    <location>
        <position position="2930"/>
    </location>
</feature>
<feature type="sequence variant" id="VAR_074293" description="In dbSNP:rs200875815." evidence="30">
    <original>T</original>
    <variation>P</variation>
    <location>
        <position position="2963"/>
    </location>
</feature>
<feature type="sequence variant" id="VAR_056082" description="In dbSNP:rs11900987.">
    <original>N</original>
    <variation>I</variation>
    <location>
        <position position="3026"/>
    </location>
</feature>
<feature type="sequence variant" id="VAR_040118" description="In dbSNP:rs4893853." evidence="26">
    <original>K</original>
    <variation>R</variation>
    <location>
        <position position="3154"/>
    </location>
</feature>
<feature type="sequence variant" id="VAR_040119" description="In dbSNP:rs33997263." evidence="26">
    <original>Q</original>
    <variation>E</variation>
    <location>
        <position position="3191"/>
    </location>
</feature>
<feature type="sequence variant" id="VAR_040120" description="In a bladder carcinoma sample; somatic mutation; dbSNP:rs397517792." evidence="26">
    <original>P</original>
    <variation>L</variation>
    <location>
        <position position="3238"/>
    </location>
</feature>
<feature type="sequence variant" id="VAR_040121" description="In dbSNP:rs55634230." evidence="26">
    <original>V</original>
    <variation>G</variation>
    <location>
        <position position="3250"/>
    </location>
</feature>
<feature type="sequence variant" id="VAR_040122" description="In dbSNP:rs2291311." evidence="26 31">
    <original>V</original>
    <variation>M</variation>
    <location>
        <position position="3261"/>
    </location>
</feature>
<feature type="sequence variant" id="VAR_040123" description="In dbSNP:rs34819099." evidence="26">
    <original>R</original>
    <variation>Q</variation>
    <location>
        <position position="3367"/>
    </location>
</feature>
<feature type="sequence variant" id="VAR_056083" description="In dbSNP:rs2291310." evidence="31">
    <original>S</original>
    <variation>N</variation>
    <location>
        <position position="3419"/>
    </location>
</feature>
<feature type="sequence variant" id="VAR_040124" description="In a metastatic melanoma sample; somatic mutation." evidence="26">
    <original>E</original>
    <variation>K</variation>
    <location>
        <position position="3482"/>
    </location>
</feature>
<feature type="sequence variant" id="VAR_040125" description="In dbSNP:rs2627037." evidence="9 11 31">
    <original>P</original>
    <variation>S</variation>
    <location>
        <position position="3491"/>
    </location>
</feature>
<feature type="sequence variant" id="VAR_040126" description="In a breast pleomorphic lobular carcinoma sample; somatic mutation." evidence="26">
    <original>E</original>
    <variation>K</variation>
    <location>
        <position position="3570"/>
    </location>
</feature>
<feature type="sequence variant" id="VAR_040127" description="In dbSNP:rs55853696." evidence="26">
    <original>L</original>
    <variation>V</variation>
    <location>
        <position position="3590"/>
    </location>
</feature>
<feature type="sequence variant" id="VAR_056084" description="In dbSNP:rs757223770.">
    <original>P</original>
    <variation>S</variation>
    <location>
        <position position="3637"/>
    </location>
</feature>
<feature type="sequence variant" id="VAR_040128" description="In dbSNP:rs34070843." evidence="26">
    <original>I</original>
    <variation>V</variation>
    <location>
        <position position="3762"/>
    </location>
</feature>
<feature type="sequence variant" id="VAR_026690" description="In CMD1G." evidence="13">
    <original>S</original>
    <variation>Y</variation>
    <location>
        <position position="3799"/>
    </location>
</feature>
<feature type="sequence variant" id="VAR_040129" description="In dbSNP:rs34618570." evidence="26">
    <original>I</original>
    <variation>F</variation>
    <location>
        <position position="3877"/>
    </location>
</feature>
<feature type="sequence variant" id="VAR_040130" description="In dbSNP:rs56244420." evidence="26">
    <original>I</original>
    <variation>L</variation>
    <location>
        <position position="3965"/>
    </location>
</feature>
<feature type="sequence variant" id="VAR_026691" description="In dbSNP:rs200431386." evidence="13">
    <original>R</original>
    <variation>Q</variation>
    <location>
        <position position="4084"/>
    </location>
</feature>
<feature type="sequence variant" id="VAR_026635" description="In dbSNP:rs2562829." evidence="7 9 11 13 26">
    <original>T</original>
    <variation>P</variation>
    <location>
        <position position="4215"/>
    </location>
</feature>
<feature type="sequence variant" id="VAR_040131" description="In dbSNP:rs56030296." evidence="26">
    <original>G</original>
    <variation>W</variation>
    <location>
        <position position="4238"/>
    </location>
</feature>
<feature type="sequence variant" id="VAR_026636" description="In dbSNP:rs1883085." evidence="7 9 11 26">
    <original>L</original>
    <variation>F</variation>
    <location>
        <position position="4283"/>
    </location>
</feature>
<feature type="sequence variant" id="VAR_040132" description="In a colorectal adenocarcinoma sample; somatic mutation." evidence="26">
    <original>I</original>
    <variation>T</variation>
    <location>
        <position position="4291"/>
    </location>
</feature>
<feature type="sequence variant" id="VAR_040133" description="In dbSNP:rs55857742." evidence="26">
    <original>G</original>
    <variation>D</variation>
    <location>
        <position position="4303"/>
    </location>
</feature>
<feature type="sequence variant" id="VAR_040134" description="In dbSNP:rs55906845." evidence="26">
    <original>D</original>
    <variation>E</variation>
    <location>
        <position position="4427"/>
    </location>
</feature>
<feature type="sequence variant" id="VAR_026692" description="In CMD1G; dbSNP:rs281864908." evidence="13">
    <original>S</original>
    <variation>N</variation>
    <location>
        <position position="4465"/>
    </location>
</feature>
<feature type="sequence variant" id="VAR_056085" description="In dbSNP:rs16866412.">
    <original>A</original>
    <variation>V</variation>
    <location>
        <position position="8288"/>
    </location>
</feature>
<feature type="sequence variant" id="VAR_056086" description="In dbSNP:rs4893852.">
    <original>I</original>
    <variation>T</variation>
    <location>
        <position position="8474"/>
    </location>
</feature>
<feature type="sequence variant" id="VAR_040135" description="In dbSNP:rs55723264." evidence="26">
    <original>G</original>
    <variation>E</variation>
    <location>
        <position position="12310"/>
    </location>
</feature>
<feature type="sequence variant" id="VAR_040136" description="In dbSNP:rs2288563." evidence="9">
    <original>H</original>
    <variation>R</variation>
    <location>
        <position position="12383"/>
    </location>
</feature>
<feature type="sequence variant" id="VAR_040137" description="In dbSNP:rs34706299." evidence="26">
    <original>V</original>
    <variation>A</variation>
    <location>
        <position position="12469"/>
    </location>
</feature>
<feature type="sequence variant" id="VAR_040138" description="In a gastric adenocarcinoma sample; somatic mutation; dbSNP:rs199684560." evidence="26">
    <original>R</original>
    <variation>C</variation>
    <location>
        <position position="12642"/>
    </location>
</feature>
<feature type="sequence variant" id="VAR_040139" description="In a Wilms tumor; somatic mutation; dbSNP:rs778634417." evidence="26">
    <original>E</original>
    <variation>K</variation>
    <location>
        <position position="12657"/>
    </location>
</feature>
<feature type="sequence variant" id="VAR_040140" description="In dbSNP:rs6723526." evidence="26 31">
    <original>K</original>
    <variation>E</variation>
    <location>
        <position position="12679"/>
    </location>
</feature>
<feature type="sequence variant" id="VAR_040141" description="In a metastatic melanoma sample; somatic mutation." evidence="26">
    <original>S</original>
    <variation>F</variation>
    <location>
        <position position="12720"/>
    </location>
</feature>
<feature type="sequence variant" id="VAR_040142" description="In dbSNP:rs200914097." evidence="26">
    <original>R</original>
    <variation>C</variation>
    <location>
        <position position="12798"/>
    </location>
</feature>
<feature type="sequence variant" id="VAR_040143" evidence="26">
    <original>E</original>
    <variation>G</variation>
    <location>
        <position position="13049"/>
    </location>
</feature>
<feature type="sequence variant" id="VAR_040144" description="In a metastatic melanoma sample; somatic mutation; dbSNP:rs1458591077." evidence="26">
    <original>E</original>
    <variation>K</variation>
    <location>
        <position position="13083"/>
    </location>
</feature>
<feature type="sequence variant" id="VAR_040145" description="In dbSNP:rs373298007." evidence="26">
    <original>R</original>
    <variation>L</variation>
    <location>
        <position position="13096"/>
    </location>
</feature>
<feature type="sequence variant" id="VAR_040146" description="In a lung small cell carcinoma sample; somatic mutation." evidence="26">
    <original>Q</original>
    <variation>R</variation>
    <location>
        <position position="13099"/>
    </location>
</feature>
<feature type="sequence variant" id="VAR_040147" description="In dbSNP:rs571522834." evidence="26">
    <original>V</original>
    <variation>A</variation>
    <location>
        <position position="13297"/>
    </location>
</feature>
<feature type="sequence variant" id="VAR_040148" description="In dbSNP:rs74580375." evidence="26">
    <original>I</original>
    <variation>M</variation>
    <location>
        <position position="13399"/>
    </location>
</feature>
<feature type="sequence variant" id="VAR_040149" description="In dbSNP:rs144668626." evidence="26">
    <original>A</original>
    <variation>T</variation>
    <location>
        <position position="13418"/>
    </location>
</feature>
<feature type="sequence variant" id="VAR_040150" description="In dbSNP:rs114331773." evidence="26">
    <original>E</original>
    <variation>V</variation>
    <location>
        <position position="13428"/>
    </location>
</feature>
<feature type="sequence variant" id="VAR_040151" description="In dbSNP:rs184078045." evidence="26">
    <original>I</original>
    <variation>T</variation>
    <location>
        <position position="13430"/>
    </location>
</feature>
<feature type="sequence variant" id="VAR_040152" description="In a breast pleomorphic lobular carcinoma sample; somatic mutation." evidence="26">
    <original>R</original>
    <variation>K</variation>
    <location>
        <position position="13434"/>
    </location>
</feature>
<feature type="sequence variant" id="VAR_040153" description="In dbSNP:rs17354992." evidence="26">
    <original>D</original>
    <variation>N</variation>
    <location>
        <position position="13469"/>
    </location>
</feature>
<feature type="sequence variant" id="VAR_040154" description="In dbSNP:rs72677225." evidence="26">
    <original>K</original>
    <variation>N</variation>
    <location>
        <position position="13495"/>
    </location>
</feature>
<feature type="sequence variant" id="VAR_040155" description="In a breast pleomorphic lobular carcinoma sample; somatic mutation." evidence="26">
    <original>N</original>
    <variation>S</variation>
    <location>
        <position position="13785"/>
    </location>
</feature>
<feature type="sequence variant" id="VAR_040156" description="In a lung small cell carcinoma sample; somatic mutation." evidence="26">
    <original>Q</original>
    <variation>H</variation>
    <location>
        <position position="13870"/>
    </location>
</feature>
<feature type="sequence variant" id="VAR_040157" description="In dbSNP:rs72677232." evidence="26">
    <original>V</original>
    <variation>I</variation>
    <location>
        <position position="14109"/>
    </location>
</feature>
<feature type="sequence variant" id="VAR_040158" description="In dbSNP:rs72677233." evidence="26">
    <original>R</original>
    <variation>Q</variation>
    <location>
        <position position="14131"/>
    </location>
</feature>
<feature type="sequence variant" id="VAR_040159" description="In dbSNP:rs146181477." evidence="26">
    <original>P</original>
    <variation>T</variation>
    <location>
        <position position="14208"/>
    </location>
</feature>
<feature type="sequence variant" id="VAR_040160" description="In a lung adenocarcinoma sample; somatic mutation." evidence="26">
    <original>L</original>
    <variation>V</variation>
    <location>
        <position position="14728"/>
    </location>
</feature>
<feature type="sequence variant" id="VAR_074294" description="In dbSNP:rs200944827." evidence="30">
    <original>R</original>
    <variation>Q</variation>
    <location>
        <position position="14750"/>
    </location>
</feature>
<feature type="sequence variant" id="VAR_040161" description="In dbSNP:rs55663050." evidence="26">
    <original>S</original>
    <variation>T</variation>
    <location>
        <position position="14999"/>
    </location>
</feature>
<feature type="sequence variant" id="VAR_040162" description="In dbSNP:rs36043230." evidence="26">
    <original>N</original>
    <variation>T</variation>
    <location>
        <position position="15021"/>
    </location>
</feature>
<feature type="sequence variant" id="VAR_040163" description="In dbSNP:rs16866412." evidence="26">
    <original>A</original>
    <variation>V</variation>
    <location>
        <position position="15520"/>
    </location>
</feature>
<feature type="sequence variant" id="VAR_040164" description="In a colorectal adenocarcinoma sample; somatic mutation; dbSNP:rs751398376." evidence="26">
    <original>R</original>
    <variation>I</variation>
    <location>
        <position position="15555"/>
    </location>
</feature>
<feature type="sequence variant" id="VAR_040165" description="In dbSNP:rs201825412." evidence="26">
    <original>R</original>
    <variation>Q</variation>
    <location>
        <position position="15620"/>
    </location>
</feature>
<feature type="sequence variant" id="VAR_040166" description="In dbSNP:rs200650668." evidence="26">
    <original>S</original>
    <variation>I</variation>
    <location>
        <position position="15629"/>
    </location>
</feature>
<feature type="sequence variant" id="VAR_040167" description="In a gastric adenocarcinoma sample; somatic mutation." evidence="26">
    <original>Y</original>
    <variation>C</variation>
    <location>
        <position position="15635"/>
    </location>
</feature>
<feature type="sequence variant" id="VAR_040168" description="In dbSNP:rs370390570." evidence="26">
    <original>R</original>
    <variation>Q</variation>
    <location>
        <position position="15700"/>
    </location>
</feature>
<feature type="sequence variant" id="VAR_040169" description="In dbSNP:rs755155531." evidence="26">
    <original>L</original>
    <variation>P</variation>
    <location>
        <position position="15705"/>
    </location>
</feature>
<feature type="sequence variant" id="VAR_040170" description="In dbSNP:rs554368924." evidence="26">
    <original>I</original>
    <variation>M</variation>
    <location>
        <position position="15837"/>
    </location>
</feature>
<feature type="sequence variant" id="VAR_069432" description="In dbSNP:rs780672348." evidence="29">
    <original>G</original>
    <variation>V</variation>
    <location>
        <position position="16046"/>
    </location>
</feature>
<feature type="sequence variant" id="VAR_040171" description="In dbSNP:rs72646808." evidence="26">
    <original>R</original>
    <variation>H</variation>
    <location>
        <position position="16058"/>
    </location>
</feature>
<feature type="sequence variant" id="VAR_040172" description="In dbSNP:rs2303832." evidence="26">
    <original>K</original>
    <variation>I</variation>
    <location>
        <position position="16067"/>
    </location>
</feature>
<feature type="sequence variant" id="VAR_040173" description="In dbSNP:rs72646809." evidence="26">
    <original>I</original>
    <variation>T</variation>
    <location>
        <position position="16090"/>
    </location>
</feature>
<feature type="sequence variant" id="VAR_040174" description="In a gastric adenocarcinoma sample; somatic mutation; dbSNP:rs373526624." evidence="26">
    <original>R</original>
    <variation>H</variation>
    <location>
        <position position="16195"/>
    </location>
</feature>
<feature type="sequence variant" id="VAR_040175" description="In dbSNP:rs55734111." evidence="26">
    <original>R</original>
    <variation>C</variation>
    <location>
        <position position="16409"/>
    </location>
</feature>
<feature type="sequence variant" id="VAR_040176" description="In dbSNP:rs375895183." evidence="26">
    <original>R</original>
    <variation>P</variation>
    <location>
        <position position="16424"/>
    </location>
</feature>
<feature type="sequence variant" id="VAR_056087" description="In dbSNP:rs3813243.">
    <original>V</original>
    <variation>M</variation>
    <location>
        <position position="16575"/>
    </location>
</feature>
<feature type="sequence variant" id="VAR_040177" description="In dbSNP:rs55809450." evidence="26">
    <original>I</original>
    <variation>M</variation>
    <location>
        <position position="16629"/>
    </location>
</feature>
<feature type="sequence variant" id="VAR_040178" description="In dbSNP:rs72646823." evidence="26">
    <original>K</original>
    <variation>R</variation>
    <location>
        <position position="16877"/>
    </location>
</feature>
<feature type="sequence variant" id="VAR_040179" description="In dbSNP:rs1001238." evidence="26">
    <original>N</original>
    <variation>D</variation>
    <location>
        <position position="17060"/>
    </location>
</feature>
<feature type="sequence variant" id="VAR_040180" description="In dbSNP:rs56025724." evidence="26">
    <original>I</original>
    <variation>V</variation>
    <location>
        <position position="17637"/>
    </location>
</feature>
<feature type="sequence variant" id="VAR_040181" description="In dbSNP:rs2288569." evidence="26">
    <original>R</original>
    <variation>H</variation>
    <location>
        <position position="17838"/>
    </location>
</feature>
<feature type="sequence variant" id="VAR_040182" evidence="26">
    <original>D</original>
    <variation>N</variation>
    <location>
        <position position="17866"/>
    </location>
</feature>
<feature type="sequence variant" id="VAR_040183" description="In a metastatic melanoma sample; somatic mutation; dbSNP:rs374713701." evidence="26">
    <original>G</original>
    <variation>E</variation>
    <location>
        <position position="17906"/>
    </location>
</feature>
<feature type="sequence variant" id="VAR_040184" description="In dbSNP:rs769852851." evidence="26">
    <original>E</original>
    <variation>A</variation>
    <location>
        <position position="18094"/>
    </location>
</feature>
<feature type="sequence variant" id="VAR_040185" description="In dbSNP:rs200732032." evidence="26">
    <original>G</original>
    <variation>S</variation>
    <location>
        <position position="18109"/>
    </location>
</feature>
<feature type="sequence variant" id="VAR_040186" description="In an ovarian serous carcinoma sample; somatic mutation." evidence="26">
    <original>R</original>
    <variation>T</variation>
    <location>
        <position position="18164"/>
    </location>
</feature>
<feature type="sequence variant" id="VAR_040187" description="In dbSNP:rs16866406." evidence="26">
    <original>P</original>
    <variation>L</variation>
    <location>
        <position position="18221"/>
    </location>
</feature>
<feature type="sequence variant" id="VAR_040188" evidence="26">
    <original>A</original>
    <variation>T</variation>
    <location>
        <position position="18222"/>
    </location>
</feature>
<feature type="sequence variant" id="VAR_040189" description="In dbSNP:rs141973925." evidence="26">
    <original>R</original>
    <variation>Q</variation>
    <location>
        <position position="18726"/>
    </location>
</feature>
<feature type="sequence variant" id="VAR_040190" description="In a breast infiltrating ductal carcinoma sample; somatic mutation; dbSNP:rs1336054298." evidence="26">
    <original>V</original>
    <variation>A</variation>
    <location>
        <position position="18835"/>
    </location>
</feature>
<feature type="sequence variant" id="VAR_040191" description="In a metastatic melanoma sample; somatic mutation; dbSNP:rs1204056923." evidence="26">
    <original>R</original>
    <variation>K</variation>
    <location>
        <position position="18881"/>
    </location>
</feature>
<feature type="sequence variant" id="VAR_040192" description="In dbSNP:rs1470758075." evidence="26">
    <original>N</original>
    <variation>S</variation>
    <location>
        <position position="18939"/>
    </location>
</feature>
<feature type="sequence variant" id="VAR_040193" description="In dbSNP:rs199895260." evidence="26">
    <original>R</original>
    <variation>Q</variation>
    <location>
        <position position="19000"/>
    </location>
</feature>
<feature type="sequence variant" id="VAR_040194" description="In a lung large cell carcinoma sample; somatic mutation; dbSNP:rs1383995916." evidence="26">
    <original>L</original>
    <variation>Q</variation>
    <location>
        <position position="19060"/>
    </location>
</feature>
<feature type="sequence variant" id="VAR_040195" description="In a lung large cell carcinoma sample; somatic mutation." evidence="26">
    <original>R</original>
    <variation>K</variation>
    <location>
        <position position="19091"/>
    </location>
</feature>
<feature type="sequence variant" id="VAR_040196" description="In a colorectal adenocarcinoma sample; somatic mutation." evidence="26">
    <original>P</original>
    <variation>S</variation>
    <location>
        <position position="19224"/>
    </location>
</feature>
<feature type="sequence variant" id="VAR_040197" description="In dbSNP:rs72646850." evidence="26">
    <original>T</original>
    <variation>I</variation>
    <location>
        <position position="19367"/>
    </location>
</feature>
<feature type="sequence variant" id="VAR_040198" description="In a lung neuroendocrine carcinoma sample; somatic mutation." evidence="26">
    <original>E</original>
    <variation>K</variation>
    <location>
        <position position="19392"/>
    </location>
</feature>
<feature type="sequence variant" id="VAR_040199" description="In a gastric adenocarcinoma sample; somatic mutation." evidence="26">
    <original>A</original>
    <variation>S</variation>
    <location>
        <position position="19480"/>
    </location>
</feature>
<feature type="sequence variant" id="VAR_040200" description="In dbSNP:rs773075736." evidence="26">
    <original>D</original>
    <variation>G</variation>
    <location>
        <position position="19495"/>
    </location>
</feature>
<feature type="sequence variant" id="VAR_040201" description="In dbSNP:rs202240487." evidence="26">
    <original>R</original>
    <variation>H</variation>
    <location>
        <position position="19665"/>
    </location>
</feature>
<feature type="sequence variant" id="VAR_040202" description="In dbSNP:rs2042996." evidence="26 31">
    <original>T</original>
    <variation>I</variation>
    <location>
        <position position="19762"/>
    </location>
</feature>
<feature type="sequence variant" id="VAR_040203" description="In dbSNP:rs181717727." evidence="26">
    <original>G</original>
    <variation>R</variation>
    <location>
        <position position="19947"/>
    </location>
</feature>
<feature type="sequence variant" id="VAR_040204" description="In dbSNP:rs150661999." evidence="26">
    <original>V</original>
    <variation>M</variation>
    <location>
        <position position="19956"/>
    </location>
</feature>
<feature type="sequence variant" id="VAR_040205" description="In dbSNP:rs141965360." evidence="26">
    <original>R</original>
    <variation>Q</variation>
    <location>
        <position position="19992"/>
    </location>
</feature>
<feature type="sequence variant" id="VAR_040206" description="In dbSNP:rs72646861." evidence="26">
    <original>R</original>
    <variation>C</variation>
    <location>
        <position position="20057"/>
    </location>
</feature>
<feature type="sequence variant" id="VAR_040207" description="In dbSNP:rs13021201." evidence="26">
    <original>S</original>
    <variation>L</variation>
    <location>
        <position position="20075"/>
    </location>
</feature>
<feature type="sequence variant" id="VAR_040208" evidence="26">
    <original>T</original>
    <variation>K</variation>
    <location>
        <position position="20179"/>
    </location>
</feature>
<feature type="sequence variant" id="VAR_040209" description="In dbSNP:rs56378177." evidence="26">
    <original>A</original>
    <variation>T</variation>
    <location>
        <position position="20198"/>
    </location>
</feature>
<feature type="sequence variant" id="VAR_040210" description="In dbSNP:rs55948748." evidence="26">
    <original>A</original>
    <variation>V</variation>
    <location>
        <position position="20198"/>
    </location>
</feature>
<feature type="sequence variant" id="VAR_040211" description="In dbSNP:rs200217934." evidence="26">
    <original>R</original>
    <variation>H</variation>
    <location>
        <position position="20331"/>
    </location>
</feature>
<feature type="sequence variant" id="VAR_056088" description="In dbSNP:rs9808036.">
    <original>R</original>
    <variation>K</variation>
    <location>
        <position position="20359"/>
    </location>
</feature>
<feature type="sequence variant" id="VAR_040212" description="In a metastatic melanoma sample; somatic mutation." evidence="26">
    <original>A</original>
    <variation>T</variation>
    <location>
        <position position="20408"/>
    </location>
</feature>
<feature type="sequence variant" id="VAR_040213" description="In dbSNP:rs72646869." evidence="26">
    <original>R</original>
    <variation>K</variation>
    <location>
        <position position="20564"/>
    </location>
</feature>
<feature type="sequence variant" id="VAR_040214" description="In dbSNP:rs2303838." evidence="26 31">
    <original>V</original>
    <variation>I</variation>
    <location>
        <position position="20718"/>
    </location>
</feature>
<feature type="sequence variant" id="VAR_040215" description="In dbSNP:rs72646873." evidence="26">
    <original>S</original>
    <variation>P</variation>
    <location>
        <position position="20726"/>
    </location>
</feature>
<feature type="sequence variant" id="VAR_040216" evidence="26">
    <original>T</original>
    <variation>N</variation>
    <location>
        <position position="20892"/>
    </location>
</feature>
<feature type="sequence variant" id="VAR_040217" description="In dbSNP:rs750847940." evidence="26">
    <original>S</original>
    <variation>R</variation>
    <location>
        <position position="20894"/>
    </location>
</feature>
<feature type="sequence variant" id="VAR_040218" description="In dbSNP:rs534340303." evidence="26">
    <original>D</original>
    <variation>E</variation>
    <location>
        <position position="21125"/>
    </location>
</feature>
<feature type="sequence variant" id="VAR_040219" description="In dbSNP:rs55980498." evidence="26">
    <original>P</original>
    <variation>S</variation>
    <location>
        <position position="21403"/>
    </location>
</feature>
<feature type="sequence variant" id="VAR_040220" description="In dbSNP:rs56141309." evidence="26">
    <original>R</original>
    <variation>C</variation>
    <location>
        <position position="21730"/>
    </location>
</feature>
<feature type="sequence variant" id="VAR_040221" description="In dbSNP:rs55853138." evidence="26">
    <original>R</original>
    <variation>Q</variation>
    <location>
        <position position="21747"/>
    </location>
</feature>
<feature type="sequence variant" id="VAR_040222" description="In a gastric adenocarcinoma sample; somatic mutation; dbSNP:rs55713867." evidence="26">
    <original>C</original>
    <variation>R</variation>
    <location>
        <position position="21851"/>
    </location>
</feature>
<feature type="sequence variant" id="VAR_040223" description="In dbSNP:rs55801134." evidence="26">
    <original>G</original>
    <variation>R</variation>
    <location>
        <position position="21925"/>
    </location>
</feature>
<feature type="sequence variant" id="VAR_040224" description="In dbSNP:rs56071233." evidence="26">
    <original>R</original>
    <variation>H</variation>
    <location>
        <position position="21995"/>
    </location>
</feature>
<feature type="sequence variant" id="VAR_040225" description="In dbSNP:rs55903402." evidence="26">
    <original>A</original>
    <variation>V</variation>
    <location>
        <position position="22045"/>
    </location>
</feature>
<feature type="sequence variant" id="VAR_040226" description="In dbSNP:rs55677134." evidence="26">
    <original>R</original>
    <variation>H</variation>
    <location>
        <position position="22149"/>
    </location>
</feature>
<feature type="sequence variant" id="VAR_040227" description="In dbSNP:rs55885640." evidence="26">
    <original>V</original>
    <variation>I</variation>
    <location>
        <position position="22160"/>
    </location>
</feature>
<feature type="sequence variant" id="VAR_040228" description="In dbSNP:rs55837610." evidence="26">
    <original>I</original>
    <variation>T</variation>
    <location>
        <position position="22261"/>
    </location>
</feature>
<feature type="sequence variant" id="VAR_040229" description="In dbSNP:rs56019808." evidence="26">
    <original>K</original>
    <variation>N</variation>
    <location>
        <position position="22306"/>
    </location>
</feature>
<feature type="sequence variant" id="VAR_040230" description="In dbSNP:rs10164753." evidence="26">
    <original>R</original>
    <variation>H</variation>
    <location>
        <position position="22357"/>
    </location>
</feature>
<feature type="sequence variant" id="VAR_040231" description="In dbSNP:rs56399205." evidence="26">
    <original>L</original>
    <variation>P</variation>
    <location>
        <position position="22408"/>
    </location>
</feature>
<feature type="sequence variant" id="VAR_040232" description="In a gastric adenocarcinoma sample; somatic mutation." evidence="26">
    <original>Q</original>
    <variation>H</variation>
    <location>
        <position position="22537"/>
    </location>
</feature>
<feature type="sequence variant" id="VAR_040233" description="In dbSNP:rs55992239." evidence="26">
    <original>P</original>
    <variation>L</variation>
    <location>
        <position position="22584"/>
    </location>
</feature>
<feature type="sequence variant" id="VAR_040234" description="In a gastric adenocarcinoma sample; somatic mutation." evidence="26">
    <original>L</original>
    <variation>P</variation>
    <location>
        <position position="22646"/>
    </location>
</feature>
<feature type="sequence variant" id="VAR_040235" description="In dbSNP:rs56201325." evidence="26">
    <original>T</original>
    <variation>A</variation>
    <location>
        <position position="22670"/>
    </location>
</feature>
<feature type="sequence variant" id="VAR_040236" description="In dbSNP:rs55991022." evidence="26">
    <original>A</original>
    <variation>D</variation>
    <location>
        <position position="22770"/>
    </location>
</feature>
<feature type="sequence variant" id="VAR_040237" description="In a metastatic melanoma sample; somatic mutation; dbSNP:rs764005465." evidence="26">
    <original>A</original>
    <variation>T</variation>
    <location>
        <position position="22801"/>
    </location>
</feature>
<feature type="sequence variant" id="VAR_040238" description="In a metastatic melanoma sample; somatic mutation; dbSNP:rs369098292." evidence="26">
    <original>R</original>
    <variation>W</variation>
    <location>
        <position position="22823"/>
    </location>
</feature>
<feature type="sequence variant" id="VAR_040239" description="In dbSNP:rs55762754." evidence="26">
    <original>E</original>
    <variation>Q</variation>
    <location>
        <position position="22968"/>
    </location>
</feature>
<feature type="sequence variant" id="VAR_040240" description="In dbSNP:rs55713856." evidence="26">
    <original>P</original>
    <variation>L</variation>
    <location>
        <position position="23074"/>
    </location>
</feature>
<feature type="sequence variant" id="VAR_040241" description="In a metastatic melanoma sample; somatic mutation." evidence="26">
    <original>L</original>
    <variation>F</variation>
    <location>
        <position position="23079"/>
    </location>
</feature>
<feature type="sequence variant" id="VAR_040242" description="In a breast infiltrating ductal carcinoma sample; somatic mutation." evidence="26">
    <original>D</original>
    <variation>N</variation>
    <location>
        <position position="23282"/>
    </location>
</feature>
<feature type="sequence variant" id="VAR_040243" description="In a metastatic melanoma sample; somatic mutation." evidence="26">
    <original>H</original>
    <variation>Y</variation>
    <location>
        <position position="23303"/>
    </location>
</feature>
<feature type="sequence variant" id="VAR_040244" description="In dbSNP:rs744426." evidence="26">
    <original>R</original>
    <variation>C</variation>
    <location>
        <position position="23306"/>
    </location>
</feature>
<feature type="sequence variant" id="VAR_040245" description="In a lung squamous cell carcinoma sample; somatic mutation." evidence="26">
    <original>A</original>
    <variation>S</variation>
    <location>
        <position position="23515"/>
    </location>
</feature>
<feature type="sequence variant" id="VAR_040246" description="In a gastric adenocarcinoma sample; somatic mutation." evidence="26">
    <original>E</original>
    <variation>Q</variation>
    <location>
        <position position="23551"/>
    </location>
</feature>
<feature type="sequence variant" id="VAR_040247" description="In dbSNP:rs3813243." evidence="26 31">
    <original>S</original>
    <variation>N</variation>
    <location>
        <position position="23807"/>
    </location>
</feature>
<feature type="sequence variant" id="VAR_040248" description="In an ovarian serous carcinoma sample; somatic mutation." evidence="26">
    <original>D</original>
    <variation>N</variation>
    <location>
        <position position="23872"/>
    </location>
</feature>
<feature type="sequence variant" id="VAR_040249" description="In dbSNP:rs55984930." evidence="26">
    <original>V</original>
    <variation>A</variation>
    <location>
        <position position="23891"/>
    </location>
</feature>
<feature type="sequence variant" id="VAR_040250" description="In dbSNP:rs3813245." evidence="26">
    <original>Y</original>
    <variation>H</variation>
    <location>
        <position position="23933"/>
    </location>
</feature>
<feature type="sequence variant" id="VAR_040251" description="In dbSNP:rs56372592." evidence="26">
    <original>T</original>
    <variation>M</variation>
    <location>
        <position position="23939"/>
    </location>
</feature>
<feature type="sequence variant" id="VAR_040252" description="In a gastric adenocarcinoma sample; somatic mutation." evidence="26">
    <original>F</original>
    <variation>L</variation>
    <location>
        <position position="23952"/>
    </location>
</feature>
<feature type="sequence variant" id="VAR_040253" description="In dbSNP:rs56391938." evidence="26">
    <original>A</original>
    <variation>G</variation>
    <location>
        <position position="24098"/>
    </location>
</feature>
<feature type="sequence variant" id="VAR_056089" description="In dbSNP:rs4894028.">
    <original>A</original>
    <variation>T</variation>
    <location>
        <position position="24098"/>
    </location>
</feature>
<feature type="sequence variant" id="VAR_040254" description="In dbSNP:rs3813246." evidence="26">
    <original>N</original>
    <variation>S</variation>
    <location>
        <position position="24119"/>
    </location>
</feature>
<feature type="sequence variant" id="VAR_040255" description="In dbSNP:rs56340968." evidence="26">
    <original>V</original>
    <variation>I</variation>
    <location>
        <position position="24133"/>
    </location>
</feature>
<feature type="sequence variant" id="VAR_040256" description="In a head and neck squamous cell carcinoma sample; somatic mutation." evidence="26">
    <original>V</original>
    <variation>A</variation>
    <location>
        <position position="24159"/>
    </location>
</feature>
<feature type="sequence variant" id="VAR_040257" description="In dbSNP:rs56018860." evidence="26">
    <original>T</original>
    <variation>A</variation>
    <location>
        <position position="24239"/>
    </location>
</feature>
<feature type="sequence variant" id="VAR_040258" description="In dbSNP:rs56341835." evidence="26">
    <original>E</original>
    <variation>K</variation>
    <location>
        <position position="24265"/>
    </location>
</feature>
<feature type="sequence variant" id="VAR_040259" description="In dbSNP:rs12463674." evidence="26">
    <original>I</original>
    <variation>T</variation>
    <location>
        <position position="24584"/>
    </location>
</feature>
<feature type="sequence variant" id="VAR_040260" description="In dbSNP:rs3731745." evidence="26">
    <original>I</original>
    <variation>T</variation>
    <location>
        <position position="24781"/>
    </location>
</feature>
<feature type="sequence variant" id="VAR_040261" description="In dbSNP:rs56044609." evidence="26">
    <original>R</original>
    <variation>H</variation>
    <location>
        <position position="24799"/>
    </location>
</feature>
<feature type="sequence variant" id="VAR_040262" description="In dbSNP:rs56307213." evidence="26">
    <original>D</original>
    <variation>H</variation>
    <location>
        <position position="24954"/>
    </location>
</feature>
<feature type="sequence variant" id="VAR_040263" description="In dbSNP:rs3731746." evidence="26 31">
    <original>T</original>
    <variation>M</variation>
    <location>
        <position position="24980"/>
    </location>
</feature>
<feature type="sequence variant" id="VAR_040264" description="In dbSNP:rs55850344." evidence="26">
    <original>R</original>
    <variation>H</variation>
    <location>
        <position position="25659"/>
    </location>
</feature>
<feature type="sequence variant" id="VAR_040265" description="In dbSNP:rs56365600." evidence="26">
    <original>A</original>
    <variation>T</variation>
    <location>
        <position position="25679"/>
    </location>
</feature>
<feature type="sequence variant" id="VAR_040266" description="In dbSNP:rs56137800." evidence="26">
    <original>P</original>
    <variation>A</variation>
    <location>
        <position position="25720"/>
    </location>
</feature>
<feature type="sequence variant" id="VAR_040267" description="In dbSNP:rs55933739." evidence="26">
    <original>T</original>
    <variation>K</variation>
    <location>
        <position position="25821"/>
    </location>
</feature>
<feature type="sequence variant" id="VAR_040268" description="In a metastatic melanoma sample; somatic mutation; dbSNP:rs375422359." evidence="26">
    <original>E</original>
    <variation>K</variation>
    <location>
        <position position="25859"/>
    </location>
</feature>
<feature type="sequence variant" id="VAR_040269" description="In dbSNP:rs56264840." evidence="26">
    <original>N</original>
    <variation>K</variation>
    <location>
        <position position="25879"/>
    </location>
</feature>
<feature type="sequence variant" id="VAR_040270" description="In dbSNP:rs55634791." evidence="26">
    <original>A</original>
    <variation>V</variation>
    <location>
        <position position="25923"/>
    </location>
</feature>
<feature type="sequence variant" id="VAR_040271" description="In dbSNP:rs56309296." evidence="26">
    <original>V</original>
    <variation>I</variation>
    <location>
        <position position="26045"/>
    </location>
</feature>
<feature type="sequence variant" id="VAR_040272" description="In a lung small cell carcinoma sample; somatic mutation." evidence="26">
    <original>K</original>
    <variation>E</variation>
    <location>
        <position position="26059"/>
    </location>
</feature>
<feature type="sequence variant" id="VAR_040273" description="In dbSNP:rs3829746." evidence="26">
    <original>I</original>
    <variation>V</variation>
    <location>
        <position position="26134"/>
    </location>
</feature>
<feature type="sequence variant" id="VAR_040274" description="In dbSNP:rs56057221." evidence="26">
    <original>R</original>
    <variation>C</variation>
    <location>
        <position position="26477"/>
    </location>
</feature>
<feature type="sequence variant" id="VAR_040275" description="In dbSNP:rs56330345." evidence="26">
    <original>D</original>
    <variation>Y</variation>
    <location>
        <position position="26843"/>
    </location>
</feature>
<feature type="sequence variant" id="VAR_040276" description="In dbSNP:rs1186947794." evidence="26">
    <original>K</original>
    <variation>R</variation>
    <location>
        <position position="27346"/>
    </location>
</feature>
<feature type="sequence variant" id="VAR_040277" description="In dbSNP:rs191482653." evidence="26">
    <original>R</original>
    <variation>C</variation>
    <location>
        <position position="27652"/>
    </location>
</feature>
<feature type="sequence variant" id="VAR_040278" description="In dbSNP:rs55898359." evidence="26">
    <original>G</original>
    <variation>V</variation>
    <location>
        <position position="27728"/>
    </location>
</feature>
<feature type="sequence variant" id="VAR_040279" description="In dbSNP:rs55940667." evidence="26">
    <original>F</original>
    <variation>L</variation>
    <location>
        <position position="27754"/>
    </location>
</feature>
<feature type="sequence variant" id="VAR_040280" description="In dbSNP:rs9808377." evidence="26 31">
    <original>I</original>
    <variation>T</variation>
    <location>
        <position position="27755"/>
    </location>
</feature>
<feature type="sequence variant" id="VAR_040281" description="In dbSNP:rs139506970." evidence="26">
    <original>I</original>
    <variation>V</variation>
    <location>
        <position position="27929"/>
    </location>
</feature>
<feature type="sequence variant" id="VAR_040282" description="In dbSNP:rs77853750." evidence="26">
    <original>I</original>
    <variation>L</variation>
    <location>
        <position position="28132"/>
    </location>
</feature>
<feature type="sequence variant" id="VAR_040283" description="In dbSNP:rs72648238." evidence="26">
    <original>R</original>
    <variation>Q</variation>
    <location>
        <position position="28168"/>
    </location>
</feature>
<feature type="sequence variant" id="VAR_040284" description="In dbSNP:rs149567378." evidence="26">
    <original>R</original>
    <variation>H</variation>
    <location>
        <position position="28538"/>
    </location>
</feature>
<feature type="sequence variant" id="VAR_040285" description="In dbSNP:rs114026724." evidence="26">
    <original>I</original>
    <variation>T</variation>
    <location>
        <position position="28572"/>
    </location>
</feature>
<feature type="sequence variant" id="VAR_040286" description="In dbSNP:rs148617456." evidence="26">
    <original>A</original>
    <variation>T</variation>
    <location>
        <position position="28948"/>
    </location>
</feature>
<feature type="sequence variant" id="VAR_040287" description="In dbSNP:rs535151633." evidence="26">
    <original>I</original>
    <variation>V</variation>
    <location>
        <position position="28986"/>
    </location>
</feature>
<feature type="sequence variant" id="VAR_040288" description="In dbSNP:rs376628842." evidence="26">
    <original>G</original>
    <variation>E</variation>
    <location>
        <position position="28993"/>
    </location>
</feature>
<feature type="sequence variant" id="VAR_040289" description="In dbSNP:rs373049260." evidence="26">
    <original>L</original>
    <variation>V</variation>
    <location>
        <position position="28998"/>
    </location>
</feature>
<feature type="sequence variant" id="VAR_040290" description="In dbSNP:rs747122." evidence="26">
    <original>V</original>
    <variation>M</variation>
    <location>
        <position position="29070"/>
    </location>
</feature>
<feature type="sequence variant" id="VAR_040291" description="In dbSNP:rs16866391." evidence="26">
    <original>I</original>
    <variation>V</variation>
    <location>
        <position position="29090"/>
    </location>
</feature>
<feature type="sequence variant" id="VAR_040292" description="In dbSNP:rs750303653." evidence="26">
    <original>R</original>
    <variation>C</variation>
    <location>
        <position position="29419"/>
    </location>
</feature>
<feature type="sequence variant" id="VAR_040293" description="In dbSNP:rs1310673663." evidence="26">
    <original>L</original>
    <variation>P</variation>
    <location>
        <position position="29479"/>
    </location>
</feature>
<feature type="sequence variant" id="VAR_040294" description="In a colorectal adenocarcinoma sample; somatic mutation." evidence="26">
    <original>S</original>
    <variation>L</variation>
    <location>
        <position position="29880"/>
    </location>
</feature>
<feature type="sequence variant" id="VAR_040295" description="In dbSNP:rs72648256." evidence="26">
    <original>D</original>
    <variation>E</variation>
    <location>
        <position position="29976"/>
    </location>
</feature>
<feature type="sequence variant" id="VAR_040296" description="In dbSNP:rs72648257." evidence="26">
    <original>S</original>
    <variation>G</variation>
    <location>
        <position position="30042"/>
    </location>
</feature>
<feature type="sequence variant" id="VAR_040297" description="In dbSNP:rs142525903." evidence="26">
    <original>R</original>
    <variation>C</variation>
    <location>
        <position position="30107"/>
    </location>
</feature>
<feature type="sequence variant" id="VAR_040298" description="In dbSNP:rs191484894." evidence="26">
    <original>S</original>
    <variation>F</variation>
    <location>
        <position position="30125"/>
    </location>
</feature>
<feature type="sequence variant" id="VAR_040299" description="In dbSNP:rs62621206." evidence="26">
    <original>L</original>
    <variation>P</variation>
    <location>
        <position position="30211"/>
    </location>
</feature>
<feature type="sequence variant" id="VAR_040300" description="In dbSNP:rs62621236." evidence="26">
    <original>I</original>
    <variation>T</variation>
    <location>
        <position position="30412"/>
    </location>
</feature>
<feature type="sequence variant" id="VAR_040301" description="In a renal chromophobe cancer sample; somatic mutation." evidence="26">
    <original>T</original>
    <variation>S</variation>
    <location>
        <position position="30617"/>
    </location>
</feature>
<feature type="sequence variant" id="VAR_040302" description="In dbSNP:rs56027402." evidence="26">
    <original>T</original>
    <variation>I</variation>
    <location>
        <position position="30674"/>
    </location>
</feature>
<feature type="sequence variant" id="VAR_040303" description="In a gastric adenocarcinoma sample; somatic mutation; dbSNP:rs397517769." evidence="26">
    <original>V</original>
    <variation>I</variation>
    <location>
        <position position="30809"/>
    </location>
</feature>
<feature type="sequence variant" id="VAR_040304" description="In dbSNP:rs56009327." evidence="26">
    <original>F</original>
    <variation>I</variation>
    <location>
        <position position="30818"/>
    </location>
</feature>
<feature type="sequence variant" id="VAR_040305" description="In dbSNP:rs55915651." evidence="26">
    <original>E</original>
    <variation>K</variation>
    <location>
        <position position="30825"/>
    </location>
</feature>
<feature type="sequence variant" id="VAR_040306" description="In dbSNP:rs55660660." evidence="26">
    <original>I</original>
    <variation>T</variation>
    <location>
        <position position="30856"/>
    </location>
</feature>
<feature type="sequence variant" id="VAR_040307" description="In dbSNP:rs56066673." evidence="26">
    <original>G</original>
    <variation>D</variation>
    <location>
        <position position="30887"/>
    </location>
</feature>
<feature type="sequence variant" id="VAR_040308" description="In dbSNP:rs56233675." evidence="26">
    <original>G</original>
    <variation>S</variation>
    <location>
        <position position="30887"/>
    </location>
</feature>
<feature type="sequence variant" id="VAR_040309" description="In dbSNP:rs3731749." evidence="26">
    <original>R</original>
    <variation>H</variation>
    <location>
        <position position="30897"/>
    </location>
</feature>
<feature type="sequence variant" id="VAR_040310" description="In dbSNP:rs55676195." evidence="26">
    <original>R</original>
    <variation>H</variation>
    <location>
        <position position="30907"/>
    </location>
</feature>
<feature type="sequence variant" id="VAR_040311" description="In dbSNP:rs55704830." evidence="26">
    <original>R</original>
    <variation>H</variation>
    <location>
        <position position="30946"/>
    </location>
</feature>
<feature type="sequence variant" id="VAR_040312" description="In dbSNP:rs72648270." evidence="26">
    <original>I</original>
    <variation>F</variation>
    <location>
        <position position="31081"/>
    </location>
</feature>
<feature type="sequence variant" id="VAR_040313" description="In dbSNP:rs72648272." evidence="26">
    <original>R</original>
    <variation>C</variation>
    <location>
        <position position="31107"/>
    </location>
</feature>
<feature type="sequence variant" id="VAR_040314" description="In dbSNP:rs72648273." evidence="26">
    <original>A</original>
    <variation>G</variation>
    <location>
        <position position="31124"/>
    </location>
</feature>
<feature type="sequence variant" id="VAR_040315" description="In dbSNP:rs149001703." evidence="26">
    <original>N</original>
    <variation>S</variation>
    <location>
        <position position="31156"/>
    </location>
</feature>
<feature type="sequence variant" id="VAR_040316" description="In dbSNP:rs55653324." evidence="26">
    <original>P</original>
    <variation>T</variation>
    <location>
        <position position="31246"/>
    </location>
</feature>
<feature type="sequence variant" id="VAR_040317" description="In dbSNP:rs4894028." evidence="26">
    <original>R</original>
    <variation>H</variation>
    <location>
        <position position="31330"/>
    </location>
</feature>
<feature type="sequence variant" id="VAR_040318" description="In dbSNP:rs56061641." evidence="26">
    <original>C</original>
    <variation>R</variation>
    <location>
        <position position="31690"/>
    </location>
</feature>
<feature type="sequence variant" id="VAR_040319" description="In dbSNP:rs55742743." evidence="26">
    <original>R</original>
    <variation>Q</variation>
    <location>
        <position position="31724"/>
    </location>
</feature>
<feature type="sequence variant" id="VAR_040320" description="In dbSNP:rs55675869." evidence="26">
    <original>V</original>
    <variation>I</variation>
    <location>
        <position position="31725"/>
    </location>
</feature>
<feature type="sequence variant" id="VAR_040321" description="In dbSNP:rs55880786." evidence="26">
    <original>G</original>
    <variation>S</variation>
    <location>
        <position position="31732"/>
    </location>
</feature>
<feature type="sequence variant" id="VAR_040322" description="In dbSNP:rs2278196." evidence="26">
    <original>V</original>
    <variation>I</variation>
    <location>
        <position position="31886"/>
    </location>
</feature>
<feature type="sequence variant" id="VAR_040323" description="In dbSNP:rs56273463." evidence="26">
    <original>R</original>
    <variation>C</variation>
    <location>
        <position position="32097"/>
    </location>
</feature>
<feature type="sequence variant" id="VAR_040324" description="In a lung large cell carcinoma sample; somatic mutation." evidence="26">
    <original>T</original>
    <variation>N</variation>
    <location>
        <position position="32171"/>
    </location>
</feature>
<feature type="sequence variant" id="VAR_040325" description="In dbSNP:rs34924609." evidence="26">
    <original>V</original>
    <variation>I</variation>
    <location>
        <position position="32248"/>
    </location>
</feature>
<feature type="sequence variant" id="VAR_040326" description="In dbSNP:rs55886356." evidence="26">
    <original>Q</original>
    <variation>H</variation>
    <location>
        <position position="32281"/>
    </location>
</feature>
<feature type="sequence variant" id="VAR_040327" description="In dbSNP:rs55669553." evidence="26">
    <original>R</original>
    <variation>H</variation>
    <location>
        <position position="32323"/>
    </location>
</feature>
<feature type="sequence variant" id="VAR_040328" description="In a gastric adenocarcinoma sample; somatic mutation; dbSNP:rs756924372." evidence="26">
    <original>R</original>
    <variation>W</variation>
    <location>
        <position position="32411"/>
    </location>
</feature>
<feature type="sequence variant" id="VAR_040329" description="In dbSNP:rs56347248." evidence="26">
    <original>I</original>
    <variation>V</variation>
    <location>
        <position position="32558"/>
    </location>
</feature>
<feature type="sequence variant" id="VAR_040330" description="In dbSNP:rs56173891." evidence="26">
    <original>M</original>
    <variation>V</variation>
    <location>
        <position position="32610"/>
    </location>
</feature>
<feature type="sequence variant" id="VAR_040331" description="In dbSNP:rs3731752." evidence="26">
    <original>G</original>
    <variation>V</variation>
    <location>
        <position position="32637"/>
    </location>
</feature>
<feature type="sequence variant" id="VAR_069433" description="In dbSNP:rs148525155." evidence="29">
    <original>E</original>
    <variation>Q</variation>
    <location>
        <position position="32742"/>
    </location>
</feature>
<feature type="sequence variant" id="VAR_040332" description="In dbSNP:rs55945684." evidence="26">
    <original>V</original>
    <variation>A</variation>
    <location>
        <position position="32922"/>
    </location>
</feature>
<feature type="sequence variant" id="VAR_040333" description="In a gastric adenocarcinoma sample; somatic mutation." evidence="26">
    <original>L</original>
    <variation>R</variation>
    <location>
        <position position="32943"/>
    </location>
</feature>
<feature type="sequence variant" id="VAR_040334" description="In dbSNP:rs3829747." evidence="26">
    <original>R</original>
    <variation>H</variation>
    <location>
        <position position="32953"/>
    </location>
</feature>
<feature type="sequence variant" id="VAR_026693" description="In CMD1G; dbSNP:rs199642423." evidence="25">
    <original>R</original>
    <variation>Q</variation>
    <location>
        <position position="32996"/>
    </location>
</feature>
<feature type="sequence variant" id="VAR_040335" description="In dbSNP:rs55866005." evidence="26">
    <original>V</original>
    <variation>L</variation>
    <location>
        <position position="33213"/>
    </location>
</feature>
<feature type="sequence variant" id="VAR_040336" description="In a gastric adenocarcinoma sample; somatic mutation; dbSNP:rs1003158162." evidence="26">
    <original>R</original>
    <variation>C</variation>
    <location>
        <position position="33242"/>
    </location>
</feature>
<feature type="sequence variant" id="VAR_040337" description="In dbSNP:rs56001826." evidence="26">
    <original>T</original>
    <variation>M</variation>
    <location>
        <position position="33387"/>
    </location>
</feature>
<feature type="sequence variant" id="VAR_040338" description="In dbSNP:rs56308529." evidence="26">
    <original>E</original>
    <variation>D</variation>
    <location>
        <position position="33419"/>
    </location>
</feature>
<feature type="sequence variant" id="VAR_040339" description="In dbSNP:rs55865284." evidence="26">
    <original>V</original>
    <variation>M</variation>
    <location>
        <position position="33536"/>
    </location>
</feature>
<feature type="sequence variant" id="VAR_040340" description="In dbSNP:rs56365812." evidence="26">
    <original>K</original>
    <variation>Q</variation>
    <location>
        <position position="33568"/>
    </location>
</feature>
<feature type="sequence variant" id="VAR_040341" description="In dbSNP:rs56324595." evidence="26">
    <original>E</original>
    <variation>K</variation>
    <location>
        <position position="33616"/>
    </location>
</feature>
<feature type="sequence variant" id="VAR_040342" description="In dbSNP:rs16866380." evidence="26">
    <original>P</original>
    <variation>L</variation>
    <location>
        <position position="33620"/>
    </location>
</feature>
<feature type="sequence variant" id="VAR_040343" description="In dbSNP:rs55725279." evidence="26">
    <original>E</original>
    <variation>V</variation>
    <location>
        <position position="33886"/>
    </location>
</feature>
<feature type="sequence variant" id="VAR_040344" description="In dbSNP:rs55880440." evidence="26">
    <original>I</original>
    <variation>T</variation>
    <location>
        <position position="33899"/>
    </location>
</feature>
<feature type="sequence variant" id="VAR_040345" description="In a gastric adenocarcinoma sample; somatic mutation." evidence="26">
    <original>L</original>
    <variation>P</variation>
    <location>
        <position position="33904"/>
    </location>
</feature>
<feature type="sequence variant" id="VAR_040346" description="In dbSNP:rs55842557." evidence="26">
    <original>T</original>
    <variation>I</variation>
    <location>
        <position position="33955"/>
    </location>
</feature>
<feature type="sequence variant" id="VAR_040347" description="In dbSNP:rs16866378." evidence="26">
    <original>V</original>
    <variation>A</variation>
    <location>
        <position position="34115"/>
    </location>
</feature>
<feature type="sequence variant" id="VAR_026694" description="In TMD; dbSNP:rs281864928." evidence="18">
    <original>I</original>
    <variation>N</variation>
    <location>
        <position position="34306"/>
    </location>
</feature>
<feature type="sequence variant" id="VAR_026695" description="In TMD; dbSNP:rs267607156." evidence="14">
    <original>L</original>
    <variation>P</variation>
    <location>
        <position position="34315"/>
    </location>
</feature>
<feature type="mutagenesis site" description="Disrupts catalytic activity." evidence="34">
    <original>K</original>
    <variation>A</variation>
    <location>
        <position position="32207"/>
    </location>
</feature>
<feature type="mutagenesis site" description="No phosphorylation on tyrosine." evidence="34">
    <original>Y</original>
    <variation>E</variation>
    <location>
        <position position="32341"/>
    </location>
</feature>
<feature type="sequence conflict" description="In Ref. 1; CAA62188." evidence="39" ref="1">
    <original>T</original>
    <variation>N</variation>
    <location>
        <position position="132"/>
    </location>
</feature>
<feature type="sequence conflict" description="In Ref. 3; CAD12455/CAD12456/CAD12457." evidence="39" ref="3">
    <original>P</original>
    <variation>H</variation>
    <location>
        <position position="255"/>
    </location>
</feature>
<feature type="sequence conflict" description="In Ref. 1; CAA62188." evidence="39" ref="1">
    <original>QTA</original>
    <variation>ANC</variation>
    <location>
        <begin position="1472"/>
        <end position="1474"/>
    </location>
</feature>
<feature type="sequence conflict" description="In Ref. 1; CAA62188." evidence="39" ref="1">
    <original>G</original>
    <variation>S</variation>
    <location>
        <position position="1730"/>
    </location>
</feature>
<feature type="sequence conflict" description="In Ref. 1; CAA62188." evidence="39" ref="1">
    <original>P</original>
    <variation>L</variation>
    <location>
        <position position="3919"/>
    </location>
</feature>
<feature type="sequence conflict" description="In Ref. 3; CAD12456." evidence="39" ref="3">
    <original>R</original>
    <variation>K</variation>
    <location>
        <position position="4525"/>
    </location>
</feature>
<feature type="sequence conflict" description="In Ref. 1; CAA62189 and 3; CAD12456." evidence="39" ref="1 3">
    <original>R</original>
    <variation>E</variation>
    <location>
        <position position="6619"/>
    </location>
</feature>
<feature type="sequence conflict" description="In Ref. 1; CAA62189." evidence="39" ref="1">
    <original>D</original>
    <variation>H</variation>
    <location>
        <position position="7145"/>
    </location>
</feature>
<feature type="sequence conflict" description="In Ref. 1; CAA62189." evidence="39" ref="1">
    <original>S</original>
    <variation>N</variation>
    <location>
        <position position="7441"/>
    </location>
</feature>
<feature type="sequence conflict" description="In Ref. 3; CAD12456." evidence="39" ref="3">
    <original>A</original>
    <variation>E</variation>
    <location>
        <position position="8038"/>
    </location>
</feature>
<feature type="sequence conflict" description="In Ref. 3; CAD12456." evidence="39" ref="3">
    <original>Q</original>
    <variation>H</variation>
    <location>
        <position position="8225"/>
    </location>
</feature>
<feature type="sequence conflict" description="In Ref. 1; CAA62189." evidence="39" ref="1">
    <original>A</original>
    <variation>P</variation>
    <location>
        <position position="8850"/>
    </location>
</feature>
<feature type="sequence conflict" description="In Ref. 1; CAA62189." evidence="39" ref="1">
    <original>C</original>
    <variation>V</variation>
    <location>
        <position position="9693"/>
    </location>
</feature>
<feature type="sequence conflict" description="In Ref. 1; CAA62189." evidence="39" ref="1">
    <original>I</original>
    <variation>V</variation>
    <location>
        <position position="9892"/>
    </location>
</feature>
<feature type="sequence conflict" description="In Ref. 3; CAD12456 and 9; AAP80791." evidence="39" ref="3 9">
    <original>I</original>
    <variation>V</variation>
    <location>
        <position position="10205"/>
    </location>
</feature>
<feature type="sequence conflict" description="In Ref. 3; CAD12456." evidence="39" ref="3">
    <original>G</original>
    <variation>R</variation>
    <location>
        <position position="10305"/>
    </location>
</feature>
<feature type="sequence conflict" description="In Ref. 1; CAA62189." evidence="39" ref="1">
    <original>R</original>
    <variation>K</variation>
    <location>
        <position position="10566"/>
    </location>
</feature>
<feature type="sequence conflict" description="In Ref. 1; CAA62189." evidence="39" ref="1">
    <original>R</original>
    <variation>H</variation>
    <location>
        <position position="10779"/>
    </location>
</feature>
<feature type="sequence conflict" description="In Ref. 3; CAD12456." evidence="39" ref="3">
    <original>E</original>
    <variation>D</variation>
    <location>
        <position position="11424"/>
    </location>
</feature>
<feature type="sequence conflict" description="In Ref. 1; CAA62189." evidence="39" ref="1">
    <original>A</original>
    <variation>V</variation>
    <location>
        <position position="11511"/>
    </location>
</feature>
<feature type="sequence conflict" description="In Ref. 1; CAA62189." evidence="39" ref="1">
    <original>K</original>
    <variation>N</variation>
    <location>
        <position position="11626"/>
    </location>
</feature>
<feature type="sequence conflict" description="In Ref. 1; CAA62189." evidence="39" ref="1">
    <original>K</original>
    <variation>N</variation>
    <location>
        <position position="11838"/>
    </location>
</feature>
<feature type="sequence conflict" description="In Ref. 1; CAA62188." evidence="39" ref="1">
    <original>A</original>
    <variation>T</variation>
    <location>
        <position position="12994"/>
    </location>
</feature>
<feature type="sequence conflict" description="In Ref. 11." evidence="39" ref="11">
    <original>YKF</original>
    <variation>IQI</variation>
    <location>
        <begin position="13795"/>
        <end position="13797"/>
    </location>
</feature>
<feature type="sequence conflict" description="In Ref. 1; CAA62188." evidence="39" ref="1">
    <original>A</original>
    <variation>T</variation>
    <location>
        <position position="14590"/>
    </location>
</feature>
<feature type="sequence conflict" description="In Ref. 1; CAA62188." evidence="39" ref="1">
    <original>V</original>
    <variation>A</variation>
    <location>
        <position position="14792"/>
    </location>
</feature>
<feature type="sequence conflict" description="In Ref. 1; CAA62188." evidence="39" ref="1">
    <original>E</original>
    <variation>K</variation>
    <location>
        <position position="15974"/>
    </location>
</feature>
<feature type="sequence conflict" description="In Ref. 1; CAA62188." evidence="39" ref="1">
    <original>TK</original>
    <variation>QR</variation>
    <location>
        <begin position="16234"/>
        <end position="16235"/>
    </location>
</feature>
<feature type="sequence conflict" description="In Ref. 1; CAA62188." evidence="39" ref="1">
    <original>R</original>
    <variation>H</variation>
    <location>
        <position position="17238"/>
    </location>
</feature>
<feature type="sequence conflict" description="In Ref. 3; CAD12456." evidence="39" ref="3">
    <original>R</original>
    <variation>S</variation>
    <location>
        <position position="17423"/>
    </location>
</feature>
<feature type="sequence conflict" description="In Ref. 1; CAA62188." evidence="39" ref="1">
    <original>V</original>
    <variation>A</variation>
    <location>
        <position position="19734"/>
    </location>
</feature>
<feature type="sequence conflict" description="In Ref. 1; CAA62188 and 3; CAD12455." evidence="39" ref="1 3">
    <original>G</original>
    <variation>A</variation>
    <location>
        <position position="20517"/>
    </location>
</feature>
<feature type="sequence conflict" description="In Ref. 1; CAA62188." evidence="39" ref="1">
    <original>L</original>
    <variation>H</variation>
    <location>
        <position position="20622"/>
    </location>
</feature>
<feature type="sequence conflict" description="In Ref. 1; CAA62188." evidence="39" ref="1">
    <original>A</original>
    <variation>P</variation>
    <location>
        <position position="20775"/>
    </location>
</feature>
<feature type="sequence conflict" description="In Ref. 13; CAA45939." evidence="39" ref="13">
    <original>Y</original>
    <variation>I</variation>
    <location>
        <position position="21625"/>
    </location>
</feature>
<feature type="sequence conflict" description="In Ref. 13; CAA45939." evidence="39" ref="13">
    <original>PGPVLN</original>
    <variation>ARPSPQ</variation>
    <location>
        <begin position="21795"/>
        <end position="21800"/>
    </location>
</feature>
<feature type="sequence conflict" description="In Ref. 1; CAA62188." evidence="39" ref="1">
    <original>C</original>
    <variation>W</variation>
    <location>
        <position position="22176"/>
    </location>
</feature>
<feature type="sequence conflict" description="In Ref. 1; CAA62188." evidence="39" ref="1">
    <original>A</original>
    <variation>D</variation>
    <location>
        <position position="22816"/>
    </location>
</feature>
<feature type="sequence conflict" description="In Ref. 1; CAA62188." evidence="39" ref="1">
    <original>T</original>
    <variation>A</variation>
    <location>
        <position position="22837"/>
    </location>
</feature>
<feature type="sequence conflict" description="In Ref. 1; CAA62188 and 13; CAA45940." evidence="39" ref="1 13">
    <original>I</original>
    <variation>M</variation>
    <location>
        <position position="24176"/>
    </location>
</feature>
<feature type="sequence conflict" description="In Ref. 13; CAA45940." evidence="39" ref="13">
    <original>S</original>
    <variation>F</variation>
    <location>
        <position position="24181"/>
    </location>
</feature>
<feature type="sequence conflict" description="In Ref. 1; CAA62188." evidence="39" ref="1">
    <original>P</original>
    <variation>S</variation>
    <location>
        <position position="25731"/>
    </location>
</feature>
<feature type="sequence conflict" description="In Ref. 1; CAA62188." evidence="39" ref="1">
    <original>M</original>
    <variation>V</variation>
    <location>
        <position position="26573"/>
    </location>
</feature>
<feature type="sequence conflict" description="In Ref. 1; CAA62188." evidence="39" ref="1">
    <original>IVE</original>
    <variation>HRK</variation>
    <location>
        <begin position="26846"/>
        <end position="26848"/>
    </location>
</feature>
<feature type="sequence conflict" description="In Ref. 1; CAA62188." evidence="39" ref="1">
    <original>G</original>
    <variation>A</variation>
    <location>
        <position position="27879"/>
    </location>
</feature>
<feature type="sequence conflict" description="In Ref. 1; CAA62188." evidence="39" ref="1">
    <original>D</original>
    <variation>N</variation>
    <location>
        <position position="28936"/>
    </location>
</feature>
<feature type="sequence conflict" description="In Ref. 1; CAA62188." evidence="39" ref="1">
    <original>A</original>
    <variation>T</variation>
    <location>
        <position position="29222"/>
    </location>
</feature>
<feature type="sequence conflict" description="In Ref. 1; CAA62188." evidence="39" ref="1">
    <original>F</original>
    <variation>L</variation>
    <location>
        <position position="29518"/>
    </location>
</feature>
<feature type="sequence conflict" description="In Ref. 14; CAA45938/CAA49245." evidence="39" ref="14">
    <original>T</original>
    <variation>P</variation>
    <location>
        <position position="29701"/>
    </location>
</feature>
<feature type="sequence conflict" description="In Ref. 14; CAA45938/CAA49245." evidence="39" ref="14">
    <original>E</original>
    <variation>G</variation>
    <location>
        <position position="29873"/>
    </location>
</feature>
<feature type="sequence conflict" description="In Ref. 14; CAA45938/CAA49245." evidence="39" ref="14">
    <original>T</original>
    <variation>Q</variation>
    <location>
        <position position="29878"/>
    </location>
</feature>
<feature type="sequence conflict" description="In Ref. 1; CAA62188 and 14; CAA45938/CAA49245." evidence="39" ref="1 14">
    <original>K</original>
    <variation>E</variation>
    <location>
        <position position="30209"/>
    </location>
</feature>
<feature type="sequence conflict" description="In Ref. 1; CAA62188 and 14; CAA45938/CAA49245." evidence="39" ref="1 14">
    <original>A</original>
    <variation>R</variation>
    <location>
        <position position="30256"/>
    </location>
</feature>
<feature type="sequence conflict" description="In Ref. 1; CAA62188 and 14; CAA45938/CAA49245." evidence="39" ref="1 14">
    <original>V</original>
    <variation>I</variation>
    <location>
        <position position="30496"/>
    </location>
</feature>
<feature type="sequence conflict" description="In Ref. 1; CAA62188 and 14; CAA45938/CAA49245." evidence="39" ref="1 14">
    <original>Y</original>
    <variation>H</variation>
    <location>
        <position position="30534"/>
    </location>
</feature>
<feature type="sequence conflict" description="In Ref. 14; CAA45938/CAA49245." evidence="39" ref="14">
    <original>S</original>
    <variation>L</variation>
    <location>
        <position position="30748"/>
    </location>
</feature>
<feature type="sequence conflict" description="In Ref. 1; CAA62188 and 14; CAA45938/CAA49245." evidence="39" ref="1 14">
    <original>W</original>
    <variation>V</variation>
    <location>
        <position position="31303"/>
    </location>
</feature>
<feature type="sequence conflict" description="In Ref. 1; CAA62188 and 14; CAA45938/CAA49245." evidence="39" ref="1 14">
    <original>V</original>
    <variation>A</variation>
    <location>
        <position position="32060"/>
    </location>
</feature>
<feature type="sequence conflict" description="In Ref. 1; CAA62188 and 14; CAA49245." evidence="39" ref="1 14">
    <original>D</original>
    <variation>N</variation>
    <location>
        <position position="33084"/>
    </location>
</feature>
<feature type="sequence conflict" description="In Ref. 15; CAD28458." evidence="39" ref="15">
    <original>R</original>
    <variation>W</variation>
    <location>
        <position position="33120"/>
    </location>
</feature>
<feature type="sequence conflict" description="In Ref. 14; CAA49245." evidence="39" ref="14">
    <original>A</original>
    <variation>R</variation>
    <location>
        <position position="33382"/>
    </location>
</feature>
<feature type="sequence conflict" description="In Ref. 1; CAA62188 and 14; CAA49245." evidence="39" ref="1 14">
    <original>S</original>
    <variation>P</variation>
    <location>
        <position position="33424"/>
    </location>
</feature>
<feature type="sequence conflict" description="In Ref. 14; CAA49245." evidence="39" ref="14">
    <original>Q</original>
    <variation>R</variation>
    <location>
        <position position="33526"/>
    </location>
</feature>
<feature type="sequence conflict" description="In Ref. 1; CAA62188 and 14; CAA49245." evidence="39" ref="1 14">
    <original>T</original>
    <variation>I</variation>
    <location>
        <position position="33633"/>
    </location>
</feature>
<feature type="sequence conflict" description="In Ref. 15; CAD28458." evidence="39" ref="15">
    <original>Y</original>
    <variation>V</variation>
    <location>
        <position position="33716"/>
    </location>
</feature>
<feature type="sequence conflict" description="In Ref. 15; CAD28458." evidence="39" ref="15">
    <original>V</original>
    <variation>A</variation>
    <location>
        <position position="33995"/>
    </location>
</feature>
<feature type="sequence conflict" description="In Ref. 5; AAI07798." evidence="39" ref="5">
    <original>N</original>
    <variation>G</variation>
    <location>
        <position position="34071"/>
    </location>
</feature>
<feature type="sequence conflict" description="In Ref. 14; CAA49245." evidence="39" ref="14">
    <original>C</original>
    <variation>R</variation>
    <location>
        <position position="34082"/>
    </location>
</feature>
<feature type="sequence conflict" description="In Ref. 5; AAI07798." evidence="39" ref="5">
    <original>G</original>
    <variation>R</variation>
    <location>
        <position position="34253"/>
    </location>
</feature>
<feature type="strand" evidence="49">
    <location>
        <begin position="4"/>
        <end position="10"/>
    </location>
</feature>
<feature type="strand" evidence="49">
    <location>
        <begin position="15"/>
        <end position="18"/>
    </location>
</feature>
<feature type="strand" evidence="49">
    <location>
        <begin position="23"/>
        <end position="33"/>
    </location>
</feature>
<feature type="strand" evidence="49">
    <location>
        <begin position="36"/>
        <end position="45"/>
    </location>
</feature>
<feature type="turn" evidence="49">
    <location>
        <begin position="48"/>
        <end position="50"/>
    </location>
</feature>
<feature type="strand" evidence="49">
    <location>
        <begin position="55"/>
        <end position="59"/>
    </location>
</feature>
<feature type="strand" evidence="49">
    <location>
        <begin position="62"/>
        <end position="69"/>
    </location>
</feature>
<feature type="helix" evidence="49">
    <location>
        <begin position="72"/>
        <end position="74"/>
    </location>
</feature>
<feature type="strand" evidence="49">
    <location>
        <begin position="76"/>
        <end position="84"/>
    </location>
</feature>
<feature type="strand" evidence="49">
    <location>
        <begin position="87"/>
        <end position="98"/>
    </location>
</feature>
<feature type="strand" evidence="49">
    <location>
        <begin position="102"/>
        <end position="108"/>
    </location>
</feature>
<feature type="strand" evidence="49">
    <location>
        <begin position="113"/>
        <end position="116"/>
    </location>
</feature>
<feature type="strand" evidence="49">
    <location>
        <begin position="119"/>
        <end position="131"/>
    </location>
</feature>
<feature type="strand" evidence="49">
    <location>
        <begin position="134"/>
        <end position="139"/>
    </location>
</feature>
<feature type="strand" evidence="48">
    <location>
        <begin position="142"/>
        <end position="144"/>
    </location>
</feature>
<feature type="strand" evidence="49">
    <location>
        <begin position="147"/>
        <end position="155"/>
    </location>
</feature>
<feature type="strand" evidence="49">
    <location>
        <begin position="158"/>
        <end position="166"/>
    </location>
</feature>
<feature type="helix" evidence="49">
    <location>
        <begin position="168"/>
        <end position="170"/>
    </location>
</feature>
<feature type="strand" evidence="49">
    <location>
        <begin position="172"/>
        <end position="180"/>
    </location>
</feature>
<feature type="strand" evidence="49">
    <location>
        <begin position="183"/>
        <end position="194"/>
    </location>
</feature>
<feature type="strand" evidence="64">
    <location>
        <begin position="199"/>
        <end position="205"/>
    </location>
</feature>
<feature type="strand" evidence="64">
    <location>
        <begin position="209"/>
        <end position="213"/>
    </location>
</feature>
<feature type="strand" evidence="64">
    <location>
        <begin position="225"/>
        <end position="233"/>
    </location>
</feature>
<feature type="strand" evidence="64">
    <location>
        <begin position="236"/>
        <end position="241"/>
    </location>
</feature>
<feature type="strand" evidence="63">
    <location>
        <begin position="1850"/>
        <end position="1852"/>
    </location>
</feature>
<feature type="strand" evidence="63">
    <location>
        <begin position="1858"/>
        <end position="1863"/>
    </location>
</feature>
<feature type="strand" evidence="63">
    <location>
        <begin position="1866"/>
        <end position="1869"/>
    </location>
</feature>
<feature type="strand" evidence="63">
    <location>
        <begin position="1871"/>
        <end position="1876"/>
    </location>
</feature>
<feature type="turn" evidence="63">
    <location>
        <begin position="1891"/>
        <end position="1893"/>
    </location>
</feature>
<feature type="strand" evidence="63">
    <location>
        <begin position="1894"/>
        <end position="1899"/>
    </location>
</feature>
<feature type="strand" evidence="63">
    <location>
        <begin position="1908"/>
        <end position="1916"/>
    </location>
</feature>
<feature type="strand" evidence="63">
    <location>
        <begin position="1919"/>
        <end position="1929"/>
    </location>
</feature>
<feature type="strand" evidence="42">
    <location>
        <begin position="2076"/>
        <end position="2082"/>
    </location>
</feature>
<feature type="strand" evidence="42">
    <location>
        <begin position="2087"/>
        <end position="2090"/>
    </location>
</feature>
<feature type="strand" evidence="42">
    <location>
        <begin position="2095"/>
        <end position="2105"/>
    </location>
</feature>
<feature type="strand" evidence="42">
    <location>
        <begin position="2108"/>
        <end position="2113"/>
    </location>
</feature>
<feature type="strand" evidence="42">
    <location>
        <begin position="2122"/>
        <end position="2130"/>
    </location>
</feature>
<feature type="strand" evidence="42">
    <location>
        <begin position="2133"/>
        <end position="2138"/>
    </location>
</feature>
<feature type="helix" evidence="42">
    <location>
        <begin position="2143"/>
        <end position="2145"/>
    </location>
</feature>
<feature type="strand" evidence="42">
    <location>
        <begin position="2147"/>
        <end position="2155"/>
    </location>
</feature>
<feature type="strand" evidence="42">
    <location>
        <begin position="2158"/>
        <end position="2169"/>
    </location>
</feature>
<feature type="strand" evidence="61">
    <location>
        <begin position="2797"/>
        <end position="2799"/>
    </location>
</feature>
<feature type="strand" evidence="61">
    <location>
        <begin position="2804"/>
        <end position="2807"/>
    </location>
</feature>
<feature type="strand" evidence="61">
    <location>
        <begin position="2812"/>
        <end position="2820"/>
    </location>
</feature>
<feature type="strand" evidence="61">
    <location>
        <begin position="2826"/>
        <end position="2829"/>
    </location>
</feature>
<feature type="strand" evidence="61">
    <location>
        <begin position="2838"/>
        <end position="2845"/>
    </location>
</feature>
<feature type="strand" evidence="61">
    <location>
        <begin position="2848"/>
        <end position="2853"/>
    </location>
</feature>
<feature type="helix" evidence="61">
    <location>
        <begin position="2858"/>
        <end position="2860"/>
    </location>
</feature>
<feature type="strand" evidence="61">
    <location>
        <begin position="2862"/>
        <end position="2868"/>
    </location>
</feature>
<feature type="strand" evidence="61">
    <location>
        <begin position="2871"/>
        <end position="2880"/>
    </location>
</feature>
<feature type="strand" evidence="61">
    <location>
        <begin position="2884"/>
        <end position="2886"/>
    </location>
</feature>
<feature type="strand" evidence="61">
    <location>
        <begin position="2891"/>
        <end position="2894"/>
    </location>
</feature>
<feature type="strand" evidence="61">
    <location>
        <begin position="2899"/>
        <end position="2907"/>
    </location>
</feature>
<feature type="strand" evidence="61">
    <location>
        <begin position="2914"/>
        <end position="2916"/>
    </location>
</feature>
<feature type="strand" evidence="61">
    <location>
        <begin position="2924"/>
        <end position="2932"/>
    </location>
</feature>
<feature type="strand" evidence="61">
    <location>
        <begin position="2935"/>
        <end position="2940"/>
    </location>
</feature>
<feature type="helix" evidence="61">
    <location>
        <begin position="2945"/>
        <end position="2947"/>
    </location>
</feature>
<feature type="strand" evidence="61">
    <location>
        <begin position="2949"/>
        <end position="2955"/>
    </location>
</feature>
<feature type="strand" evidence="61">
    <location>
        <begin position="2958"/>
        <end position="2967"/>
    </location>
</feature>
<feature type="strand" evidence="61">
    <location>
        <begin position="2971"/>
        <end position="2973"/>
    </location>
</feature>
<feature type="strand" evidence="61">
    <location>
        <begin position="2978"/>
        <end position="2981"/>
    </location>
</feature>
<feature type="strand" evidence="61">
    <location>
        <begin position="2986"/>
        <end position="2994"/>
    </location>
</feature>
<feature type="strand" evidence="61">
    <location>
        <begin position="3000"/>
        <end position="3003"/>
    </location>
</feature>
<feature type="strand" evidence="61">
    <location>
        <begin position="3012"/>
        <end position="3019"/>
    </location>
</feature>
<feature type="strand" evidence="61">
    <location>
        <begin position="3022"/>
        <end position="3027"/>
    </location>
</feature>
<feature type="helix" evidence="61">
    <location>
        <begin position="3032"/>
        <end position="3034"/>
    </location>
</feature>
<feature type="strand" evidence="61">
    <location>
        <begin position="3036"/>
        <end position="3042"/>
    </location>
</feature>
<feature type="strand" evidence="61">
    <location>
        <begin position="3045"/>
        <end position="3053"/>
    </location>
</feature>
<feature type="strand" evidence="81">
    <location>
        <begin position="3504"/>
        <end position="3507"/>
    </location>
</feature>
<feature type="strand" evidence="81">
    <location>
        <begin position="3512"/>
        <end position="3515"/>
    </location>
</feature>
<feature type="strand" evidence="81">
    <location>
        <begin position="3520"/>
        <end position="3527"/>
    </location>
</feature>
<feature type="strand" evidence="81">
    <location>
        <begin position="3533"/>
        <end position="3538"/>
    </location>
</feature>
<feature type="strand" evidence="81">
    <location>
        <begin position="3547"/>
        <end position="3554"/>
    </location>
</feature>
<feature type="strand" evidence="81">
    <location>
        <begin position="3557"/>
        <end position="3562"/>
    </location>
</feature>
<feature type="helix" evidence="81">
    <location>
        <begin position="3567"/>
        <end position="3569"/>
    </location>
</feature>
<feature type="strand" evidence="81">
    <location>
        <begin position="3571"/>
        <end position="3579"/>
    </location>
</feature>
<feature type="strand" evidence="81">
    <location>
        <begin position="3582"/>
        <end position="3593"/>
    </location>
</feature>
<feature type="helix" evidence="70">
    <location>
        <begin position="9506"/>
        <end position="9510"/>
    </location>
</feature>
<feature type="helix" evidence="70">
    <location>
        <begin position="9518"/>
        <end position="9525"/>
    </location>
</feature>
<feature type="helix" evidence="70">
    <location>
        <begin position="9530"/>
        <end position="9543"/>
    </location>
</feature>
<feature type="strand" evidence="62">
    <location>
        <begin position="9582"/>
        <end position="9587"/>
    </location>
</feature>
<feature type="strand" evidence="62">
    <location>
        <begin position="9592"/>
        <end position="9595"/>
    </location>
</feature>
<feature type="strand" evidence="62">
    <location>
        <begin position="9600"/>
        <end position="9608"/>
    </location>
</feature>
<feature type="strand" evidence="62">
    <location>
        <begin position="9616"/>
        <end position="9619"/>
    </location>
</feature>
<feature type="strand" evidence="62">
    <location>
        <begin position="9628"/>
        <end position="9635"/>
    </location>
</feature>
<feature type="strand" evidence="62">
    <location>
        <begin position="9638"/>
        <end position="9643"/>
    </location>
</feature>
<feature type="helix" evidence="62">
    <location>
        <begin position="9648"/>
        <end position="9650"/>
    </location>
</feature>
<feature type="strand" evidence="62">
    <location>
        <begin position="9652"/>
        <end position="9658"/>
    </location>
</feature>
<feature type="strand" evidence="62">
    <location>
        <begin position="9661"/>
        <end position="9670"/>
    </location>
</feature>
<feature type="strand" evidence="69">
    <location>
        <begin position="9674"/>
        <end position="9676"/>
    </location>
</feature>
<feature type="strand" evidence="69">
    <location>
        <begin position="9681"/>
        <end position="9684"/>
    </location>
</feature>
<feature type="strand" evidence="69">
    <location>
        <begin position="9689"/>
        <end position="9697"/>
    </location>
</feature>
<feature type="strand" evidence="69">
    <location>
        <begin position="9703"/>
        <end position="9706"/>
    </location>
</feature>
<feature type="strand" evidence="69">
    <location>
        <begin position="9717"/>
        <end position="9722"/>
    </location>
</feature>
<feature type="strand" evidence="69">
    <location>
        <begin position="9725"/>
        <end position="9732"/>
    </location>
</feature>
<feature type="helix" evidence="69">
    <location>
        <begin position="9735"/>
        <end position="9737"/>
    </location>
</feature>
<feature type="strand" evidence="69">
    <location>
        <begin position="9739"/>
        <end position="9745"/>
    </location>
</feature>
<feature type="strand" evidence="69">
    <location>
        <begin position="9748"/>
        <end position="9757"/>
    </location>
</feature>
<feature type="strand" evidence="69">
    <location>
        <begin position="9763"/>
        <end position="9765"/>
    </location>
</feature>
<feature type="strand" evidence="69">
    <location>
        <begin position="9770"/>
        <end position="9772"/>
    </location>
</feature>
<feature type="strand" evidence="69">
    <location>
        <begin position="9778"/>
        <end position="9786"/>
    </location>
</feature>
<feature type="strand" evidence="69">
    <location>
        <begin position="9790"/>
        <end position="9795"/>
    </location>
</feature>
<feature type="strand" evidence="69">
    <location>
        <begin position="9803"/>
        <end position="9811"/>
    </location>
</feature>
<feature type="strand" evidence="69">
    <location>
        <begin position="9814"/>
        <end position="9819"/>
    </location>
</feature>
<feature type="helix" evidence="69">
    <location>
        <begin position="9824"/>
        <end position="9826"/>
    </location>
</feature>
<feature type="strand" evidence="69">
    <location>
        <begin position="9828"/>
        <end position="9835"/>
    </location>
</feature>
<feature type="strand" evidence="69">
    <location>
        <begin position="9841"/>
        <end position="9850"/>
    </location>
</feature>
<feature type="strand" evidence="47">
    <location>
        <begin position="12680"/>
        <end position="12682"/>
    </location>
</feature>
<feature type="strand" evidence="47">
    <location>
        <begin position="12687"/>
        <end position="12690"/>
    </location>
</feature>
<feature type="strand" evidence="67">
    <location>
        <begin position="12691"/>
        <end position="12693"/>
    </location>
</feature>
<feature type="strand" evidence="47">
    <location>
        <begin position="12695"/>
        <end position="12705"/>
    </location>
</feature>
<feature type="strand" evidence="47">
    <location>
        <begin position="12709"/>
        <end position="12712"/>
    </location>
</feature>
<feature type="strand" evidence="44">
    <location>
        <begin position="12719"/>
        <end position="12722"/>
    </location>
</feature>
<feature type="strand" evidence="47">
    <location>
        <begin position="12723"/>
        <end position="12728"/>
    </location>
</feature>
<feature type="strand" evidence="47">
    <location>
        <begin position="12731"/>
        <end position="12736"/>
    </location>
</feature>
<feature type="helix" evidence="47">
    <location>
        <begin position="12741"/>
        <end position="12743"/>
    </location>
</feature>
<feature type="strand" evidence="47">
    <location>
        <begin position="12745"/>
        <end position="12751"/>
    </location>
</feature>
<feature type="strand" evidence="47">
    <location>
        <begin position="12754"/>
        <end position="12763"/>
    </location>
</feature>
<feature type="strand" evidence="59">
    <location>
        <begin position="14223"/>
        <end position="14228"/>
    </location>
</feature>
<feature type="strand" evidence="59">
    <location>
        <begin position="14232"/>
        <end position="14240"/>
    </location>
</feature>
<feature type="strand" evidence="59">
    <location>
        <begin position="14252"/>
        <end position="14259"/>
    </location>
</feature>
<feature type="strand" evidence="59">
    <location>
        <begin position="14275"/>
        <end position="14281"/>
    </location>
</feature>
<feature type="strand" evidence="59">
    <location>
        <begin position="14288"/>
        <end position="14296"/>
    </location>
</feature>
<feature type="strand" evidence="59">
    <location>
        <begin position="14308"/>
        <end position="14314"/>
    </location>
</feature>
<feature type="strand" evidence="74">
    <location>
        <begin position="14319"/>
        <end position="14322"/>
    </location>
</feature>
<feature type="helix" evidence="74">
    <location>
        <begin position="14325"/>
        <end position="14327"/>
    </location>
</feature>
<feature type="strand" evidence="74">
    <location>
        <begin position="14331"/>
        <end position="14334"/>
    </location>
</feature>
<feature type="strand" evidence="74">
    <location>
        <begin position="14339"/>
        <end position="14349"/>
    </location>
</feature>
<feature type="strand" evidence="74">
    <location>
        <begin position="14352"/>
        <end position="14357"/>
    </location>
</feature>
<feature type="strand" evidence="74">
    <location>
        <begin position="14368"/>
        <end position="14372"/>
    </location>
</feature>
<feature type="strand" evidence="74">
    <location>
        <begin position="14374"/>
        <end position="14381"/>
    </location>
</feature>
<feature type="helix" evidence="74">
    <location>
        <begin position="14386"/>
        <end position="14388"/>
    </location>
</feature>
<feature type="strand" evidence="74">
    <location>
        <begin position="14390"/>
        <end position="14397"/>
    </location>
</feature>
<feature type="strand" evidence="74">
    <location>
        <begin position="14402"/>
        <end position="14412"/>
    </location>
</feature>
<feature type="strand" evidence="73">
    <location>
        <begin position="14419"/>
        <end position="14424"/>
    </location>
</feature>
<feature type="strand" evidence="73">
    <location>
        <begin position="14431"/>
        <end position="14436"/>
    </location>
</feature>
<feature type="strand" evidence="73">
    <location>
        <begin position="14446"/>
        <end position="14455"/>
    </location>
</feature>
<feature type="strand" evidence="73">
    <location>
        <begin position="14462"/>
        <end position="14468"/>
    </location>
</feature>
<feature type="strand" evidence="73">
    <location>
        <begin position="14470"/>
        <end position="14475"/>
    </location>
</feature>
<feature type="strand" evidence="73">
    <location>
        <begin position="14484"/>
        <end position="14492"/>
    </location>
</feature>
<feature type="strand" evidence="74">
    <location>
        <begin position="14506"/>
        <end position="14509"/>
    </location>
</feature>
<feature type="strand" evidence="72">
    <location>
        <begin position="14522"/>
        <end position="14524"/>
    </location>
</feature>
<feature type="strand" evidence="72">
    <location>
        <begin position="14528"/>
        <end position="14534"/>
    </location>
</feature>
<feature type="strand" evidence="72">
    <location>
        <begin position="14549"/>
        <end position="14555"/>
    </location>
</feature>
<feature type="strand" evidence="72">
    <location>
        <begin position="14568"/>
        <end position="14576"/>
    </location>
</feature>
<feature type="strand" evidence="72">
    <location>
        <begin position="14584"/>
        <end position="14592"/>
    </location>
</feature>
<feature type="strand" evidence="77">
    <location>
        <begin position="15216"/>
        <end position="15224"/>
    </location>
</feature>
<feature type="strand" evidence="77">
    <location>
        <begin position="15227"/>
        <end position="15233"/>
    </location>
</feature>
<feature type="strand" evidence="77">
    <location>
        <begin position="15245"/>
        <end position="15252"/>
    </location>
</feature>
<feature type="strand" evidence="77">
    <location>
        <begin position="15268"/>
        <end position="15273"/>
    </location>
</feature>
<feature type="strand" evidence="77">
    <location>
        <begin position="15282"/>
        <end position="15290"/>
    </location>
</feature>
<feature type="strand" evidence="77">
    <location>
        <begin position="15305"/>
        <end position="15307"/>
    </location>
</feature>
<feature type="strand" evidence="75">
    <location>
        <begin position="16533"/>
        <end position="16538"/>
    </location>
</feature>
<feature type="strand" evidence="75">
    <location>
        <begin position="16541"/>
        <end position="16546"/>
    </location>
</feature>
<feature type="strand" evidence="75">
    <location>
        <begin position="16559"/>
        <end position="16566"/>
    </location>
</feature>
<feature type="strand" evidence="75">
    <location>
        <begin position="16585"/>
        <end position="16592"/>
    </location>
</feature>
<feature type="strand" evidence="75">
    <location>
        <begin position="16600"/>
        <end position="16609"/>
    </location>
</feature>
<feature type="strand" evidence="75">
    <location>
        <begin position="16623"/>
        <end position="16626"/>
    </location>
</feature>
<feature type="strand" evidence="78">
    <location>
        <begin position="20520"/>
        <end position="20528"/>
    </location>
</feature>
<feature type="strand" evidence="78">
    <location>
        <begin position="20531"/>
        <end position="20537"/>
    </location>
</feature>
<feature type="strand" evidence="78">
    <location>
        <begin position="20549"/>
        <end position="20556"/>
    </location>
</feature>
<feature type="helix" evidence="78">
    <location>
        <begin position="20568"/>
        <end position="20570"/>
    </location>
</feature>
<feature type="strand" evidence="78">
    <location>
        <begin position="20573"/>
        <end position="20580"/>
    </location>
</feature>
<feature type="strand" evidence="78">
    <location>
        <begin position="20587"/>
        <end position="20594"/>
    </location>
</feature>
<feature type="strand" evidence="76">
    <location>
        <begin position="21506"/>
        <end position="21509"/>
    </location>
</feature>
<feature type="strand" evidence="76">
    <location>
        <begin position="21515"/>
        <end position="21518"/>
    </location>
</feature>
<feature type="strand" evidence="76">
    <location>
        <begin position="21532"/>
        <end position="21539"/>
    </location>
</feature>
<feature type="strand" evidence="76">
    <location>
        <begin position="21546"/>
        <end position="21551"/>
    </location>
</feature>
<feature type="strand" evidence="76">
    <location>
        <begin position="21553"/>
        <end position="21560"/>
    </location>
</feature>
<feature type="strand" evidence="76">
    <location>
        <begin position="21568"/>
        <end position="21577"/>
    </location>
</feature>
<feature type="strand" evidence="41">
    <location>
        <begin position="22291"/>
        <end position="22296"/>
    </location>
</feature>
<feature type="strand" evidence="41">
    <location>
        <begin position="22299"/>
        <end position="22303"/>
    </location>
</feature>
<feature type="strand" evidence="41">
    <location>
        <begin position="22319"/>
        <end position="22324"/>
    </location>
</feature>
<feature type="strand" evidence="41">
    <location>
        <begin position="22340"/>
        <end position="22345"/>
    </location>
</feature>
<feature type="strand" evidence="41">
    <location>
        <begin position="22354"/>
        <end position="22361"/>
    </location>
</feature>
<feature type="strand" evidence="41">
    <location>
        <begin position="22367"/>
        <end position="22377"/>
    </location>
</feature>
<feature type="helix" evidence="41">
    <location>
        <begin position="22381"/>
        <end position="22384"/>
    </location>
</feature>
<feature type="strand" evidence="56">
    <location>
        <begin position="22883"/>
        <end position="22890"/>
    </location>
</feature>
<feature type="strand" evidence="56">
    <location>
        <begin position="22895"/>
        <end position="22900"/>
    </location>
</feature>
<feature type="strand" evidence="56">
    <location>
        <begin position="22912"/>
        <end position="22919"/>
    </location>
</feature>
<feature type="strand" evidence="56">
    <location>
        <begin position="22926"/>
        <end position="22932"/>
    </location>
</feature>
<feature type="strand" evidence="56">
    <location>
        <begin position="22934"/>
        <end position="22939"/>
    </location>
</feature>
<feature type="strand" evidence="56">
    <location>
        <begin position="22947"/>
        <end position="22956"/>
    </location>
</feature>
<feature type="strand" evidence="56">
    <location>
        <begin position="22970"/>
        <end position="22972"/>
    </location>
</feature>
<feature type="strand" evidence="56">
    <location>
        <begin position="22982"/>
        <end position="22987"/>
    </location>
</feature>
<feature type="strand" evidence="56">
    <location>
        <begin position="22992"/>
        <end position="22996"/>
    </location>
</feature>
<feature type="strand" evidence="56">
    <location>
        <begin position="23009"/>
        <end position="23016"/>
    </location>
</feature>
<feature type="strand" evidence="56">
    <location>
        <begin position="23023"/>
        <end position="23035"/>
    </location>
</feature>
<feature type="strand" evidence="56">
    <location>
        <begin position="23043"/>
        <end position="23052"/>
    </location>
</feature>
<feature type="strand" evidence="71">
    <location>
        <begin position="23568"/>
        <end position="23575"/>
    </location>
</feature>
<feature type="strand" evidence="71">
    <location>
        <begin position="23581"/>
        <end position="23586"/>
    </location>
</feature>
<feature type="strand" evidence="71">
    <location>
        <begin position="23596"/>
        <end position="23605"/>
    </location>
</feature>
<feature type="strand" evidence="71">
    <location>
        <begin position="23612"/>
        <end position="23618"/>
    </location>
</feature>
<feature type="strand" evidence="71">
    <location>
        <begin position="23620"/>
        <end position="23625"/>
    </location>
</feature>
<feature type="strand" evidence="71">
    <location>
        <begin position="23633"/>
        <end position="23642"/>
    </location>
</feature>
<feature type="strand" evidence="71">
    <location>
        <begin position="23671"/>
        <end position="23676"/>
    </location>
</feature>
<feature type="strand" evidence="71">
    <location>
        <begin position="23679"/>
        <end position="23683"/>
    </location>
</feature>
<feature type="strand" evidence="71">
    <location>
        <begin position="23697"/>
        <end position="23704"/>
    </location>
</feature>
<feature type="strand" evidence="71">
    <location>
        <begin position="23711"/>
        <end position="23716"/>
    </location>
</feature>
<feature type="strand" evidence="71">
    <location>
        <begin position="23720"/>
        <end position="23725"/>
    </location>
</feature>
<feature type="strand" evidence="71">
    <location>
        <begin position="23733"/>
        <end position="23742"/>
    </location>
</feature>
<feature type="strand" evidence="71">
    <location>
        <begin position="23769"/>
        <end position="23776"/>
    </location>
</feature>
<feature type="strand" evidence="71">
    <location>
        <begin position="23781"/>
        <end position="23786"/>
    </location>
</feature>
<feature type="strand" evidence="71">
    <location>
        <begin position="23798"/>
        <end position="23805"/>
    </location>
</feature>
<feature type="turn" evidence="71">
    <location>
        <begin position="23806"/>
        <end position="23808"/>
    </location>
</feature>
<feature type="strand" evidence="71">
    <location>
        <begin position="23811"/>
        <end position="23815"/>
    </location>
</feature>
<feature type="strand" evidence="71">
    <location>
        <begin position="23820"/>
        <end position="23827"/>
    </location>
</feature>
<feature type="strand" evidence="71">
    <location>
        <begin position="23835"/>
        <end position="23843"/>
    </location>
</feature>
<feature type="strand" evidence="79">
    <location>
        <begin position="25439"/>
        <end position="25443"/>
    </location>
</feature>
<feature type="strand" evidence="79">
    <location>
        <begin position="25448"/>
        <end position="25451"/>
    </location>
</feature>
<feature type="strand" evidence="79">
    <location>
        <begin position="25465"/>
        <end position="25472"/>
    </location>
</feature>
<feature type="strand" evidence="79">
    <location>
        <begin position="25479"/>
        <end position="25481"/>
    </location>
</feature>
<feature type="strand" evidence="79">
    <location>
        <begin position="25486"/>
        <end position="25493"/>
    </location>
</feature>
<feature type="strand" evidence="79">
    <location>
        <begin position="25501"/>
        <end position="25509"/>
    </location>
</feature>
<feature type="strand" evidence="79">
    <location>
        <begin position="25514"/>
        <end position="25517"/>
    </location>
</feature>
<feature type="strand" evidence="80">
    <location>
        <begin position="26130"/>
        <end position="26137"/>
    </location>
</feature>
<feature type="strand" evidence="80">
    <location>
        <begin position="26142"/>
        <end position="26147"/>
    </location>
</feature>
<feature type="strand" evidence="80">
    <location>
        <begin position="26157"/>
        <end position="26166"/>
    </location>
</feature>
<feature type="strand" evidence="80">
    <location>
        <begin position="26173"/>
        <end position="26179"/>
    </location>
</feature>
<feature type="strand" evidence="80">
    <location>
        <begin position="26181"/>
        <end position="26186"/>
    </location>
</feature>
<feature type="strand" evidence="80">
    <location>
        <begin position="26194"/>
        <end position="26203"/>
    </location>
</feature>
<feature type="strand" evidence="80">
    <location>
        <begin position="26206"/>
        <end position="26212"/>
    </location>
</feature>
<feature type="strand" evidence="55">
    <location>
        <begin position="31458"/>
        <end position="31464"/>
    </location>
</feature>
<feature type="strand" evidence="55">
    <location>
        <begin position="31469"/>
        <end position="31472"/>
    </location>
</feature>
<feature type="strand" evidence="55">
    <location>
        <begin position="31475"/>
        <end position="31487"/>
    </location>
</feature>
<feature type="strand" evidence="55">
    <location>
        <begin position="31490"/>
        <end position="31495"/>
    </location>
</feature>
<feature type="strand" evidence="55">
    <location>
        <begin position="31498"/>
        <end position="31500"/>
    </location>
</feature>
<feature type="strand" evidence="55">
    <location>
        <begin position="31504"/>
        <end position="31520"/>
    </location>
</feature>
<feature type="helix" evidence="55">
    <location>
        <begin position="31524"/>
        <end position="31526"/>
    </location>
</feature>
<feature type="strand" evidence="55">
    <location>
        <begin position="31528"/>
        <end position="31535"/>
    </location>
</feature>
<feature type="strand" evidence="55">
    <location>
        <begin position="31540"/>
        <end position="31555"/>
    </location>
</feature>
<feature type="strand" evidence="55">
    <location>
        <begin position="31563"/>
        <end position="31568"/>
    </location>
</feature>
<feature type="strand" evidence="55">
    <location>
        <begin position="31573"/>
        <end position="31583"/>
    </location>
</feature>
<feature type="strand" evidence="55">
    <location>
        <begin position="31586"/>
        <end position="31591"/>
    </location>
</feature>
<feature type="strand" evidence="55">
    <location>
        <begin position="31600"/>
        <end position="31606"/>
    </location>
</feature>
<feature type="strand" evidence="55">
    <location>
        <begin position="31608"/>
        <end position="31617"/>
    </location>
</feature>
<feature type="helix" evidence="55">
    <location>
        <begin position="31620"/>
        <end position="31623"/>
    </location>
</feature>
<feature type="strand" evidence="55">
    <location>
        <begin position="31625"/>
        <end position="31632"/>
    </location>
</feature>
<feature type="strand" evidence="55">
    <location>
        <begin position="31637"/>
        <end position="31647"/>
    </location>
</feature>
<feature type="strand" evidence="51">
    <location>
        <begin position="31856"/>
        <end position="31859"/>
    </location>
</feature>
<feature type="strand" evidence="51">
    <location>
        <begin position="31864"/>
        <end position="31867"/>
    </location>
</feature>
<feature type="strand" evidence="51">
    <location>
        <begin position="31872"/>
        <end position="31879"/>
    </location>
</feature>
<feature type="strand" evidence="51">
    <location>
        <begin position="31885"/>
        <end position="31890"/>
    </location>
</feature>
<feature type="strand" evidence="52">
    <location>
        <begin position="31893"/>
        <end position="31895"/>
    </location>
</feature>
<feature type="strand" evidence="51">
    <location>
        <begin position="31899"/>
        <end position="31907"/>
    </location>
</feature>
<feature type="turn" evidence="51">
    <location>
        <begin position="31908"/>
        <end position="31910"/>
    </location>
</feature>
<feature type="strand" evidence="51">
    <location>
        <begin position="31911"/>
        <end position="31916"/>
    </location>
</feature>
<feature type="helix" evidence="51">
    <location>
        <begin position="31921"/>
        <end position="31923"/>
    </location>
</feature>
<feature type="strand" evidence="51">
    <location>
        <begin position="31925"/>
        <end position="31933"/>
    </location>
</feature>
<feature type="strand" evidence="51">
    <location>
        <begin position="31936"/>
        <end position="31952"/>
    </location>
</feature>
<feature type="helix" evidence="53">
    <location>
        <begin position="31956"/>
        <end position="31959"/>
    </location>
</feature>
<feature type="strand" evidence="51">
    <location>
        <begin position="31961"/>
        <end position="31967"/>
    </location>
</feature>
<feature type="strand" evidence="51">
    <location>
        <begin position="31973"/>
        <end position="31982"/>
    </location>
</feature>
<feature type="strand" evidence="51">
    <location>
        <begin position="31985"/>
        <end position="31992"/>
    </location>
</feature>
<feature type="strand" evidence="51">
    <location>
        <begin position="31997"/>
        <end position="32000"/>
    </location>
</feature>
<feature type="strand" evidence="51">
    <location>
        <begin position="32002"/>
        <end position="32005"/>
    </location>
</feature>
<feature type="strand" evidence="51">
    <location>
        <begin position="32007"/>
        <end position="32013"/>
    </location>
</feature>
<feature type="helix" evidence="51">
    <location>
        <begin position="32020"/>
        <end position="32022"/>
    </location>
</feature>
<feature type="strand" evidence="51">
    <location>
        <begin position="32024"/>
        <end position="32032"/>
    </location>
</feature>
<feature type="strand" evidence="51">
    <location>
        <begin position="32035"/>
        <end position="32046"/>
    </location>
</feature>
<feature type="strand" evidence="68">
    <location>
        <begin position="32053"/>
        <end position="32061"/>
    </location>
</feature>
<feature type="strand" evidence="68">
    <location>
        <begin position="32063"/>
        <end position="32070"/>
    </location>
</feature>
<feature type="strand" evidence="53">
    <location>
        <begin position="32076"/>
        <end position="32078"/>
    </location>
</feature>
<feature type="strand" evidence="68">
    <location>
        <begin position="32082"/>
        <end position="32089"/>
    </location>
</feature>
<feature type="strand" evidence="68">
    <location>
        <begin position="32095"/>
        <end position="32111"/>
    </location>
</feature>
<feature type="strand" evidence="68">
    <location>
        <begin position="32117"/>
        <end position="32125"/>
    </location>
</feature>
<feature type="helix" evidence="68">
    <location>
        <begin position="32142"/>
        <end position="32154"/>
    </location>
</feature>
<feature type="strand" evidence="68">
    <location>
        <begin position="32167"/>
        <end position="32170"/>
    </location>
</feature>
<feature type="turn" evidence="45">
    <location>
        <begin position="32175"/>
        <end position="32177"/>
    </location>
</feature>
<feature type="strand" evidence="45">
    <location>
        <begin position="32178"/>
        <end position="32186"/>
    </location>
</feature>
<feature type="strand" evidence="45">
    <location>
        <begin position="32188"/>
        <end position="32197"/>
    </location>
</feature>
<feature type="turn" evidence="45">
    <location>
        <begin position="32198"/>
        <end position="32201"/>
    </location>
</feature>
<feature type="strand" evidence="45">
    <location>
        <begin position="32202"/>
        <end position="32209"/>
    </location>
</feature>
<feature type="helix" evidence="45">
    <location>
        <begin position="32214"/>
        <end position="32228"/>
    </location>
</feature>
<feature type="strand" evidence="45">
    <location>
        <begin position="32237"/>
        <end position="32243"/>
    </location>
</feature>
<feature type="strand" evidence="45">
    <location>
        <begin position="32246"/>
        <end position="32251"/>
    </location>
</feature>
<feature type="helix" evidence="45">
    <location>
        <begin position="32259"/>
        <end position="32263"/>
    </location>
</feature>
<feature type="strand" evidence="45">
    <location>
        <begin position="32265"/>
        <end position="32267"/>
    </location>
</feature>
<feature type="helix" evidence="45">
    <location>
        <begin position="32272"/>
        <end position="32291"/>
    </location>
</feature>
<feature type="helix" evidence="45">
    <location>
        <begin position="32301"/>
        <end position="32303"/>
    </location>
</feature>
<feature type="strand" evidence="45">
    <location>
        <begin position="32304"/>
        <end position="32310"/>
    </location>
</feature>
<feature type="strand" evidence="45">
    <location>
        <begin position="32314"/>
        <end position="32316"/>
    </location>
</feature>
<feature type="strand" evidence="45">
    <location>
        <begin position="32330"/>
        <end position="32336"/>
    </location>
</feature>
<feature type="helix" evidence="45">
    <location>
        <begin position="32338"/>
        <end position="32340"/>
    </location>
</feature>
<feature type="helix" evidence="45">
    <location>
        <begin position="32343"/>
        <end position="32346"/>
    </location>
</feature>
<feature type="helix" evidence="45">
    <location>
        <begin position="32353"/>
        <end position="32369"/>
    </location>
</feature>
<feature type="helix" evidence="45">
    <location>
        <begin position="32379"/>
        <end position="32388"/>
    </location>
</feature>
<feature type="helix" evidence="45">
    <location>
        <begin position="32395"/>
        <end position="32398"/>
    </location>
</feature>
<feature type="helix" evidence="45">
    <location>
        <begin position="32403"/>
        <end position="32410"/>
    </location>
</feature>
<feature type="helix" evidence="45">
    <location>
        <begin position="32417"/>
        <end position="32419"/>
    </location>
</feature>
<feature type="helix" evidence="45">
    <location>
        <begin position="32423"/>
        <end position="32428"/>
    </location>
</feature>
<feature type="helix" evidence="45">
    <location>
        <begin position="32430"/>
        <end position="32433"/>
    </location>
</feature>
<feature type="helix" evidence="45">
    <location>
        <begin position="32436"/>
        <end position="32438"/>
    </location>
</feature>
<feature type="helix" evidence="45">
    <location>
        <begin position="32447"/>
        <end position="32457"/>
    </location>
</feature>
<feature type="helix" evidence="45">
    <location>
        <begin position="32466"/>
        <end position="32472"/>
    </location>
</feature>
<feature type="strand" evidence="45">
    <location>
        <begin position="32474"/>
        <end position="32476"/>
    </location>
</feature>
<feature type="strand" evidence="45">
    <location>
        <begin position="32483"/>
        <end position="32489"/>
    </location>
</feature>
<feature type="strand" evidence="50">
    <location>
        <begin position="32504"/>
        <end position="32506"/>
    </location>
</feature>
<feature type="strand" evidence="50">
    <location>
        <begin position="32512"/>
        <end position="32520"/>
    </location>
</feature>
<feature type="strand" evidence="50">
    <location>
        <begin position="32526"/>
        <end position="32531"/>
    </location>
</feature>
<feature type="strand" evidence="50">
    <location>
        <begin position="32538"/>
        <end position="32547"/>
    </location>
</feature>
<feature type="strand" evidence="50">
    <location>
        <begin position="32550"/>
        <end position="32555"/>
    </location>
</feature>
<feature type="helix" evidence="50">
    <location>
        <begin position="32560"/>
        <end position="32562"/>
    </location>
</feature>
<feature type="strand" evidence="50">
    <location>
        <begin position="32564"/>
        <end position="32571"/>
    </location>
</feature>
<feature type="strand" evidence="50">
    <location>
        <begin position="32576"/>
        <end position="32585"/>
    </location>
</feature>
<feature type="turn" evidence="50">
    <location>
        <begin position="32586"/>
        <end position="32588"/>
    </location>
</feature>
<feature type="strand" evidence="66">
    <location>
        <begin position="32720"/>
        <end position="32726"/>
    </location>
</feature>
<feature type="strand" evidence="66">
    <location>
        <begin position="32731"/>
        <end position="32734"/>
    </location>
</feature>
<feature type="strand" evidence="66">
    <location>
        <begin position="32739"/>
        <end position="32749"/>
    </location>
</feature>
<feature type="strand" evidence="66">
    <location>
        <begin position="32752"/>
        <end position="32757"/>
    </location>
</feature>
<feature type="turn" evidence="66">
    <location>
        <begin position="32765"/>
        <end position="32767"/>
    </location>
</feature>
<feature type="strand" evidence="66">
    <location>
        <begin position="32768"/>
        <end position="32773"/>
    </location>
</feature>
<feature type="turn" evidence="66">
    <location>
        <begin position="32774"/>
        <end position="32776"/>
    </location>
</feature>
<feature type="strand" evidence="66">
    <location>
        <begin position="32777"/>
        <end position="32784"/>
    </location>
</feature>
<feature type="helix" evidence="66">
    <location>
        <begin position="32787"/>
        <end position="32789"/>
    </location>
</feature>
<feature type="strand" evidence="66">
    <location>
        <begin position="32791"/>
        <end position="32799"/>
    </location>
</feature>
<feature type="strand" evidence="66">
    <location>
        <begin position="32802"/>
        <end position="32813"/>
    </location>
</feature>
<feature type="turn" evidence="58">
    <location>
        <begin position="33294"/>
        <end position="33297"/>
    </location>
</feature>
<feature type="strand" evidence="65">
    <location>
        <begin position="33299"/>
        <end position="33305"/>
    </location>
</feature>
<feature type="strand" evidence="65">
    <location>
        <begin position="33310"/>
        <end position="33313"/>
    </location>
</feature>
<feature type="strand" evidence="65">
    <location>
        <begin position="33318"/>
        <end position="33328"/>
    </location>
</feature>
<feature type="strand" evidence="65">
    <location>
        <begin position="33331"/>
        <end position="33336"/>
    </location>
</feature>
<feature type="strand" evidence="65">
    <location>
        <begin position="33345"/>
        <end position="33352"/>
    </location>
</feature>
<feature type="strand" evidence="65">
    <location>
        <begin position="33355"/>
        <end position="33360"/>
    </location>
</feature>
<feature type="helix" evidence="65">
    <location>
        <begin position="33365"/>
        <end position="33367"/>
    </location>
</feature>
<feature type="strand" evidence="65">
    <location>
        <begin position="33369"/>
        <end position="33377"/>
    </location>
</feature>
<feature type="strand" evidence="65">
    <location>
        <begin position="33380"/>
        <end position="33391"/>
    </location>
</feature>
<feature type="strand" evidence="43">
    <location>
        <begin position="33489"/>
        <end position="33492"/>
    </location>
</feature>
<feature type="strand" evidence="43">
    <location>
        <begin position="33497"/>
        <end position="33503"/>
    </location>
</feature>
<feature type="strand" evidence="43">
    <location>
        <begin position="33509"/>
        <end position="33512"/>
    </location>
</feature>
<feature type="strand" evidence="46">
    <location>
        <begin position="33514"/>
        <end position="33516"/>
    </location>
</feature>
<feature type="strand" evidence="43">
    <location>
        <begin position="33523"/>
        <end position="33526"/>
    </location>
</feature>
<feature type="strand" evidence="43">
    <location>
        <begin position="33532"/>
        <end position="33538"/>
    </location>
</feature>
<feature type="strand" evidence="43">
    <location>
        <begin position="33540"/>
        <end position="33547"/>
    </location>
</feature>
<feature type="strand" evidence="43">
    <location>
        <begin position="33556"/>
        <end position="33560"/>
    </location>
</feature>
<feature type="strand" evidence="43">
    <location>
        <begin position="33571"/>
        <end position="33577"/>
    </location>
</feature>
<feature type="strand" evidence="57">
    <location>
        <begin position="33777"/>
        <end position="33783"/>
    </location>
</feature>
<feature type="strand" evidence="57">
    <location>
        <begin position="33788"/>
        <end position="33794"/>
    </location>
</feature>
<feature type="strand" evidence="57">
    <location>
        <begin position="33796"/>
        <end position="33806"/>
    </location>
</feature>
<feature type="strand" evidence="57">
    <location>
        <begin position="33809"/>
        <end position="33814"/>
    </location>
</feature>
<feature type="strand" evidence="57">
    <location>
        <begin position="33821"/>
        <end position="33830"/>
    </location>
</feature>
<feature type="strand" evidence="57">
    <location>
        <begin position="33833"/>
        <end position="33838"/>
    </location>
</feature>
<feature type="helix" evidence="57">
    <location>
        <begin position="33843"/>
        <end position="33845"/>
    </location>
</feature>
<feature type="strand" evidence="57">
    <location>
        <begin position="33847"/>
        <end position="33855"/>
    </location>
</feature>
<feature type="strand" evidence="57">
    <location>
        <begin position="33858"/>
        <end position="33869"/>
    </location>
</feature>
<feature type="strand" evidence="60">
    <location>
        <begin position="34060"/>
        <end position="34071"/>
    </location>
</feature>
<feature type="strand" evidence="60">
    <location>
        <begin position="34078"/>
        <end position="34088"/>
    </location>
</feature>
<feature type="strand" evidence="60">
    <location>
        <begin position="34091"/>
        <end position="34096"/>
    </location>
</feature>
<feature type="turn" evidence="60">
    <location>
        <begin position="34104"/>
        <end position="34106"/>
    </location>
</feature>
<feature type="strand" evidence="60">
    <location>
        <begin position="34107"/>
        <end position="34112"/>
    </location>
</feature>
<feature type="strand" evidence="60">
    <location>
        <begin position="34115"/>
        <end position="34122"/>
    </location>
</feature>
<feature type="helix" evidence="60">
    <location>
        <begin position="34125"/>
        <end position="34127"/>
    </location>
</feature>
<feature type="strand" evidence="60">
    <location>
        <begin position="34129"/>
        <end position="34136"/>
    </location>
</feature>
<feature type="strand" evidence="60">
    <location>
        <begin position="34138"/>
        <end position="34148"/>
    </location>
</feature>
<feature type="strand" evidence="54">
    <location>
        <begin position="34254"/>
        <end position="34258"/>
    </location>
</feature>
<feature type="strand" evidence="54">
    <location>
        <begin position="34263"/>
        <end position="34268"/>
    </location>
</feature>
<feature type="strand" evidence="54">
    <location>
        <begin position="34271"/>
        <end position="34283"/>
    </location>
</feature>
<feature type="strand" evidence="54">
    <location>
        <begin position="34286"/>
        <end position="34291"/>
    </location>
</feature>
<feature type="helix" evidence="54">
    <location>
        <begin position="34300"/>
        <end position="34302"/>
    </location>
</feature>
<feature type="strand" evidence="54">
    <location>
        <begin position="34304"/>
        <end position="34308"/>
    </location>
</feature>
<feature type="strand" evidence="54">
    <location>
        <begin position="34310"/>
        <end position="34319"/>
    </location>
</feature>
<feature type="helix" evidence="54">
    <location>
        <begin position="34322"/>
        <end position="34324"/>
    </location>
</feature>
<feature type="strand" evidence="54">
    <location>
        <begin position="34326"/>
        <end position="34334"/>
    </location>
</feature>
<feature type="strand" evidence="54">
    <location>
        <begin position="34337"/>
        <end position="34348"/>
    </location>
</feature>
<feature type="sequence conflict" description="In Ref. 3; CAD12457." evidence="39" ref="3">
    <original>L</original>
    <variation>F</variation>
    <location sequence="Q8WZ42-6">
        <position position="3732"/>
    </location>
</feature>
<feature type="sequence conflict" description="In Ref. 3; CAD12457." evidence="39" ref="3">
    <original>R</original>
    <variation>M</variation>
    <location sequence="Q8WZ42-6">
        <position position="5139"/>
    </location>
</feature>
<proteinExistence type="evidence at protein level"/>
<name>TITIN_HUMAN</name>
<evidence type="ECO:0000250" key="1"/>
<evidence type="ECO:0000255" key="2"/>
<evidence type="ECO:0000255" key="3">
    <source>
        <dbReference type="PROSITE-ProRule" id="PRU00114"/>
    </source>
</evidence>
<evidence type="ECO:0000255" key="4">
    <source>
        <dbReference type="PROSITE-ProRule" id="PRU00159"/>
    </source>
</evidence>
<evidence type="ECO:0000255" key="5">
    <source>
        <dbReference type="PROSITE-ProRule" id="PRU00316"/>
    </source>
</evidence>
<evidence type="ECO:0000256" key="6">
    <source>
        <dbReference type="SAM" id="MobiDB-lite"/>
    </source>
</evidence>
<evidence type="ECO:0000269" key="7">
    <source>
    </source>
</evidence>
<evidence type="ECO:0000269" key="8">
    <source>
    </source>
</evidence>
<evidence type="ECO:0000269" key="9">
    <source>
    </source>
</evidence>
<evidence type="ECO:0000269" key="10">
    <source>
    </source>
</evidence>
<evidence type="ECO:0000269" key="11">
    <source>
    </source>
</evidence>
<evidence type="ECO:0000269" key="12">
    <source>
    </source>
</evidence>
<evidence type="ECO:0000269" key="13">
    <source>
    </source>
</evidence>
<evidence type="ECO:0000269" key="14">
    <source>
    </source>
</evidence>
<evidence type="ECO:0000269" key="15">
    <source>
    </source>
</evidence>
<evidence type="ECO:0000269" key="16">
    <source>
    </source>
</evidence>
<evidence type="ECO:0000269" key="17">
    <source>
    </source>
</evidence>
<evidence type="ECO:0000269" key="18">
    <source>
    </source>
</evidence>
<evidence type="ECO:0000269" key="19">
    <source>
    </source>
</evidence>
<evidence type="ECO:0000269" key="20">
    <source>
    </source>
</evidence>
<evidence type="ECO:0000269" key="21">
    <source>
    </source>
</evidence>
<evidence type="ECO:0000269" key="22">
    <source>
    </source>
</evidence>
<evidence type="ECO:0000269" key="23">
    <source>
    </source>
</evidence>
<evidence type="ECO:0000269" key="24">
    <source>
    </source>
</evidence>
<evidence type="ECO:0000269" key="25">
    <source>
    </source>
</evidence>
<evidence type="ECO:0000269" key="26">
    <source>
    </source>
</evidence>
<evidence type="ECO:0000269" key="27">
    <source>
    </source>
</evidence>
<evidence type="ECO:0000269" key="28">
    <source>
    </source>
</evidence>
<evidence type="ECO:0000269" key="29">
    <source>
    </source>
</evidence>
<evidence type="ECO:0000269" key="30">
    <source>
    </source>
</evidence>
<evidence type="ECO:0000269" key="31">
    <source>
    </source>
</evidence>
<evidence type="ECO:0000269" key="32">
    <source>
    </source>
</evidence>
<evidence type="ECO:0000269" key="33">
    <source>
    </source>
</evidence>
<evidence type="ECO:0000269" key="34">
    <source>
    </source>
</evidence>
<evidence type="ECO:0000303" key="35">
    <source>
    </source>
</evidence>
<evidence type="ECO:0000303" key="36">
    <source>
    </source>
</evidence>
<evidence type="ECO:0000303" key="37">
    <source>
    </source>
</evidence>
<evidence type="ECO:0000303" key="38">
    <source>
    </source>
</evidence>
<evidence type="ECO:0000305" key="39"/>
<evidence type="ECO:0000305" key="40">
    <source>
    </source>
</evidence>
<evidence type="ECO:0007829" key="41">
    <source>
        <dbReference type="PDB" id="1BPV"/>
    </source>
</evidence>
<evidence type="ECO:0007829" key="42">
    <source>
        <dbReference type="PDB" id="1G1C"/>
    </source>
</evidence>
<evidence type="ECO:0007829" key="43">
    <source>
        <dbReference type="PDB" id="1NCT"/>
    </source>
</evidence>
<evidence type="ECO:0007829" key="44">
    <source>
        <dbReference type="PDB" id="1TIU"/>
    </source>
</evidence>
<evidence type="ECO:0007829" key="45">
    <source>
        <dbReference type="PDB" id="1TKI"/>
    </source>
</evidence>
<evidence type="ECO:0007829" key="46">
    <source>
        <dbReference type="PDB" id="1TNM"/>
    </source>
</evidence>
<evidence type="ECO:0007829" key="47">
    <source>
        <dbReference type="PDB" id="1WAA"/>
    </source>
</evidence>
<evidence type="ECO:0007829" key="48">
    <source>
        <dbReference type="PDB" id="1YA5"/>
    </source>
</evidence>
<evidence type="ECO:0007829" key="49">
    <source>
        <dbReference type="PDB" id="2A38"/>
    </source>
</evidence>
<evidence type="ECO:0007829" key="50">
    <source>
        <dbReference type="PDB" id="2BK8"/>
    </source>
</evidence>
<evidence type="ECO:0007829" key="51">
    <source>
        <dbReference type="PDB" id="2J8H"/>
    </source>
</evidence>
<evidence type="ECO:0007829" key="52">
    <source>
        <dbReference type="PDB" id="2J8O"/>
    </source>
</evidence>
<evidence type="ECO:0007829" key="53">
    <source>
        <dbReference type="PDB" id="2NZI"/>
    </source>
</evidence>
<evidence type="ECO:0007829" key="54">
    <source>
        <dbReference type="PDB" id="3KNB"/>
    </source>
</evidence>
<evidence type="ECO:0007829" key="55">
    <source>
        <dbReference type="PDB" id="3LCY"/>
    </source>
</evidence>
<evidence type="ECO:0007829" key="56">
    <source>
        <dbReference type="PDB" id="3LPW"/>
    </source>
</evidence>
<evidence type="ECO:0007829" key="57">
    <source>
        <dbReference type="PDB" id="3PUC"/>
    </source>
</evidence>
<evidence type="ECO:0007829" key="58">
    <source>
        <dbReference type="PDB" id="3QP3"/>
    </source>
</evidence>
<evidence type="ECO:0007829" key="59">
    <source>
        <dbReference type="PDB" id="4O00"/>
    </source>
</evidence>
<evidence type="ECO:0007829" key="60">
    <source>
        <dbReference type="PDB" id="4UOW"/>
    </source>
</evidence>
<evidence type="ECO:0007829" key="61">
    <source>
        <dbReference type="PDB" id="5JDD"/>
    </source>
</evidence>
<evidence type="ECO:0007829" key="62">
    <source>
        <dbReference type="PDB" id="5JOE"/>
    </source>
</evidence>
<evidence type="ECO:0007829" key="63">
    <source>
        <dbReference type="PDB" id="6DL4"/>
    </source>
</evidence>
<evidence type="ECO:0007829" key="64">
    <source>
        <dbReference type="PDB" id="6FWX"/>
    </source>
</evidence>
<evidence type="ECO:0007829" key="65">
    <source>
        <dbReference type="PDB" id="6H4L"/>
    </source>
</evidence>
<evidence type="ECO:0007829" key="66">
    <source>
        <dbReference type="PDB" id="6HCI"/>
    </source>
</evidence>
<evidence type="ECO:0007829" key="67">
    <source>
        <dbReference type="PDB" id="6I0Y"/>
    </source>
</evidence>
<evidence type="ECO:0007829" key="68">
    <source>
        <dbReference type="PDB" id="6YGN"/>
    </source>
</evidence>
<evidence type="ECO:0007829" key="69">
    <source>
        <dbReference type="PDB" id="7AHS"/>
    </source>
</evidence>
<evidence type="ECO:0007829" key="70">
    <source>
        <dbReference type="PDB" id="7NIP"/>
    </source>
</evidence>
<evidence type="ECO:0007829" key="71">
    <source>
        <dbReference type="PDB" id="8BNQ"/>
    </source>
</evidence>
<evidence type="ECO:0007829" key="72">
    <source>
        <dbReference type="PDB" id="8BVO"/>
    </source>
</evidence>
<evidence type="ECO:0007829" key="73">
    <source>
        <dbReference type="PDB" id="8BW6"/>
    </source>
</evidence>
<evidence type="ECO:0007829" key="74">
    <source>
        <dbReference type="PDB" id="8BXR"/>
    </source>
</evidence>
<evidence type="ECO:0007829" key="75">
    <source>
        <dbReference type="PDB" id="8OMW"/>
    </source>
</evidence>
<evidence type="ECO:0007829" key="76">
    <source>
        <dbReference type="PDB" id="8ORL"/>
    </source>
</evidence>
<evidence type="ECO:0007829" key="77">
    <source>
        <dbReference type="PDB" id="8OS3"/>
    </source>
</evidence>
<evidence type="ECO:0007829" key="78">
    <source>
        <dbReference type="PDB" id="8OSD"/>
    </source>
</evidence>
<evidence type="ECO:0007829" key="79">
    <source>
        <dbReference type="PDB" id="8OT5"/>
    </source>
</evidence>
<evidence type="ECO:0007829" key="80">
    <source>
        <dbReference type="PDB" id="8OTY"/>
    </source>
</evidence>
<evidence type="ECO:0007829" key="81">
    <source>
        <dbReference type="PDB" id="8OVU"/>
    </source>
</evidence>
<gene>
    <name type="primary">TTN</name>
</gene>
<comment type="function">
    <text evidence="13 34">Key component in the assembly and functioning of vertebrate striated muscles. By providing connections at the level of individual microfilaments, it contributes to the fine balance of forces between the two halves of the sarcomere. The size and extensibility of the cross-links are the main determinants of sarcomere extensibility properties of muscle. In non-muscle cells, seems to play a role in chromosome condensation and chromosome segregation during mitosis. Might link the lamina network to chromatin or nuclear actin, or both during interphase.</text>
</comment>
<comment type="catalytic activity">
    <reaction>
        <text>L-seryl-[protein] + ATP = O-phospho-L-seryl-[protein] + ADP + H(+)</text>
        <dbReference type="Rhea" id="RHEA:17989"/>
        <dbReference type="Rhea" id="RHEA-COMP:9863"/>
        <dbReference type="Rhea" id="RHEA-COMP:11604"/>
        <dbReference type="ChEBI" id="CHEBI:15378"/>
        <dbReference type="ChEBI" id="CHEBI:29999"/>
        <dbReference type="ChEBI" id="CHEBI:30616"/>
        <dbReference type="ChEBI" id="CHEBI:83421"/>
        <dbReference type="ChEBI" id="CHEBI:456216"/>
        <dbReference type="EC" id="2.7.11.1"/>
    </reaction>
</comment>
<comment type="catalytic activity">
    <reaction>
        <text>L-threonyl-[protein] + ATP = O-phospho-L-threonyl-[protein] + ADP + H(+)</text>
        <dbReference type="Rhea" id="RHEA:46608"/>
        <dbReference type="Rhea" id="RHEA-COMP:11060"/>
        <dbReference type="Rhea" id="RHEA-COMP:11605"/>
        <dbReference type="ChEBI" id="CHEBI:15378"/>
        <dbReference type="ChEBI" id="CHEBI:30013"/>
        <dbReference type="ChEBI" id="CHEBI:30616"/>
        <dbReference type="ChEBI" id="CHEBI:61977"/>
        <dbReference type="ChEBI" id="CHEBI:456216"/>
        <dbReference type="EC" id="2.7.11.1"/>
    </reaction>
</comment>
<comment type="cofactor">
    <cofactor>
        <name>Mg(2+)</name>
        <dbReference type="ChEBI" id="CHEBI:18420"/>
    </cofactor>
</comment>
<comment type="activity regulation">
    <text evidence="34">Full activation of the protein kinase domain requires both phosphorylation of Tyr-32341, preventing it from blocking the catalytic aspartate residue, and binding of Ca/CALM to the C-terminal regulatory tail of the molecule which results in ATP binding to the kinase.</text>
</comment>
<comment type="subunit">
    <text evidence="1 11 15 16 17 19 20 21 22 23 24 28 33 34">Interacts with MYOM1, MYOM2, tropomyosin and myosin. Interacts with actin, primarily via the PEVK domains and with MYPN (By similarity). Interacts with FHL2, NEB, CRYAB, LMNA/lamin-A and LMNB/lamin-B. Interacts with TCAP/telethonin and/or ANK1 isoform Mu17/ank1.5, via the first two N-terminal immunoglobulin domains. Interacts with TRIM63 and TRIM55, through several domains including immunoglobulin domains 141 and 142. Interacts with ANKRD1, ANKRD2 and ANKRD23, via the region between immunoglobulin domains 77 and 78 and interacts with CAPN3, via immunoglobulin domain 79. Interacts with NBR1 through the protein kinase domain. Interacts with CALM/calmodulin. Isoform 6 interacts with OBSCN isoform 3. Interacts with CMYA5.</text>
</comment>
<comment type="interaction">
    <interactant intactId="EBI-681210">
        <id>Q8WZ42</id>
    </interactant>
    <interactant intactId="EBI-351710">
        <id>P12814</id>
        <label>ACTN1</label>
    </interactant>
    <organismsDiffer>false</organismsDiffer>
    <experiments>2</experiments>
</comment>
<comment type="interaction">
    <interactant intactId="EBI-681210">
        <id>Q8WZ42</id>
    </interactant>
    <interactant intactId="EBI-77797">
        <id>P35609</id>
        <label>ACTN2</label>
    </interactant>
    <organismsDiffer>false</organismsDiffer>
    <experiments>16</experiments>
</comment>
<comment type="interaction">
    <interactant intactId="EBI-681210">
        <id>Q8WZ42</id>
    </interactant>
    <interactant intactId="EBI-397435">
        <id>P62158</id>
        <label>CALM3</label>
    </interactant>
    <organismsDiffer>false</organismsDiffer>
    <experiments>2</experiments>
</comment>
<comment type="interaction">
    <interactant intactId="EBI-681210">
        <id>Q8WZ42</id>
    </interactant>
    <interactant intactId="EBI-5655000">
        <id>P20807</id>
        <label>CAPN3</label>
    </interactant>
    <organismsDiffer>false</organismsDiffer>
    <experiments>4</experiments>
</comment>
<comment type="interaction">
    <interactant intactId="EBI-681210">
        <id>Q8WZ42</id>
    </interactant>
    <interactant intactId="EBI-5655937">
        <id>O75953</id>
        <label>DNAJB5</label>
    </interactant>
    <organismsDiffer>false</organismsDiffer>
    <experiments>4</experiments>
</comment>
<comment type="interaction">
    <interactant intactId="EBI-681210">
        <id>Q8WZ42</id>
    </interactant>
    <interactant intactId="EBI-2799016">
        <id>O75923</id>
        <label>DYSF</label>
    </interactant>
    <organismsDiffer>false</organismsDiffer>
    <experiments>17</experiments>
</comment>
<comment type="interaction">
    <interactant intactId="EBI-681210">
        <id>Q8WZ42</id>
    </interactant>
    <interactant intactId="EBI-353877">
        <id>P06733</id>
        <label>ENO1</label>
    </interactant>
    <organismsDiffer>false</organismsDiffer>
    <experiments>3</experiments>
</comment>
<comment type="interaction">
    <interactant intactId="EBI-681210">
        <id>Q8WZ42</id>
    </interactant>
    <interactant intactId="EBI-373144">
        <id>Q9GZQ8</id>
        <label>MAP1LC3B</label>
    </interactant>
    <organismsDiffer>false</organismsDiffer>
    <experiments>2</experiments>
</comment>
<comment type="interaction">
    <interactant intactId="EBI-681210">
        <id>Q8WZ42</id>
    </interactant>
    <interactant intactId="EBI-5653200">
        <id>Q14324</id>
        <label>MYBPC2</label>
    </interactant>
    <organismsDiffer>false</organismsDiffer>
    <experiments>14</experiments>
</comment>
<comment type="interaction">
    <interactant intactId="EBI-681210">
        <id>Q8WZ42</id>
    </interactant>
    <interactant intactId="EBI-5655165">
        <id>Q13203</id>
        <label>MYBPH</label>
    </interactant>
    <organismsDiffer>false</organismsDiffer>
    <experiments>3</experiments>
</comment>
<comment type="interaction">
    <interactant intactId="EBI-681210">
        <id>Q8WZ42</id>
    </interactant>
    <interactant intactId="EBI-1049657">
        <id>P20929</id>
        <label>NEB</label>
    </interactant>
    <organismsDiffer>false</organismsDiffer>
    <experiments>6</experiments>
</comment>
<comment type="interaction">
    <interactant intactId="EBI-681210">
        <id>Q8WZ42</id>
    </interactant>
    <interactant intactId="EBI-941850">
        <id>Q5VST9</id>
        <label>OBSCN</label>
    </interactant>
    <organismsDiffer>false</organismsDiffer>
    <experiments>15</experiments>
</comment>
<comment type="interaction">
    <interactant intactId="EBI-681210">
        <id>Q8WZ42</id>
    </interactant>
    <interactant intactId="EBI-1223896">
        <id>O75147</id>
        <label>OBSL1</label>
    </interactant>
    <organismsDiffer>false</organismsDiffer>
    <experiments>13</experiments>
</comment>
<comment type="interaction">
    <interactant intactId="EBI-681210">
        <id>Q8WZ42</id>
    </interactant>
    <interactant intactId="EBI-7843148">
        <id>O15061</id>
        <label>SYNM</label>
    </interactant>
    <organismsDiffer>false</organismsDiffer>
    <experiments>3</experiments>
</comment>
<comment type="interaction">
    <interactant intactId="EBI-681210">
        <id>Q8WZ42</id>
    </interactant>
    <interactant intactId="EBI-954089">
        <id>O15273</id>
        <label>TCAP</label>
    </interactant>
    <organismsDiffer>false</organismsDiffer>
    <experiments>9</experiments>
</comment>
<comment type="interaction">
    <interactant intactId="EBI-681210">
        <id>Q8WZ42</id>
    </interactant>
    <interactant intactId="EBI-5661333">
        <id>Q969Q1</id>
        <label>TRIM63</label>
    </interactant>
    <organismsDiffer>false</organismsDiffer>
    <experiments>3</experiments>
</comment>
<comment type="interaction">
    <interactant intactId="EBI-681210">
        <id>Q8WZ42</id>
    </interactant>
    <interactant intactId="EBI-681210">
        <id>Q8WZ42</id>
        <label>TTN</label>
    </interactant>
    <organismsDiffer>false</organismsDiffer>
    <experiments>16</experiments>
</comment>
<comment type="interaction">
    <interactant intactId="EBI-15564183">
        <id>Q8WZ42-3</id>
    </interactant>
    <interactant intactId="EBI-954089">
        <id>O15273</id>
        <label>TCAP</label>
    </interactant>
    <organismsDiffer>false</organismsDiffer>
    <experiments>2</experiments>
</comment>
<comment type="interaction">
    <interactant intactId="EBI-15564183">
        <id>Q8WZ42-3</id>
    </interactant>
    <interactant intactId="EBI-15564183">
        <id>Q8WZ42-3</id>
        <label>TTN</label>
    </interactant>
    <organismsDiffer>false</organismsDiffer>
    <experiments>9</experiments>
</comment>
<comment type="subcellular location">
    <subcellularLocation>
        <location evidence="40">Cytoplasm</location>
    </subcellularLocation>
    <subcellularLocation>
        <location evidence="24">Nucleus</location>
    </subcellularLocation>
</comment>
<comment type="alternative products">
    <event type="alternative splicing"/>
    <isoform>
        <id>Q8WZ42-1</id>
        <name>1</name>
        <sequence type="displayed"/>
    </isoform>
    <isoform>
        <id>Q8WZ42-2</id>
        <name>2</name>
        <sequence type="described" ref="VSP_019138"/>
    </isoform>
    <isoform>
        <id>Q8WZ42-3</id>
        <name>3</name>
        <name>Small cardiac N2-B</name>
        <sequence type="described" ref="VSP_019139 VSP_019145"/>
    </isoform>
    <isoform>
        <id>Q8WZ42-4</id>
        <name>4</name>
        <name>Soleus</name>
        <sequence type="described" ref="VSP_019142 VSP_019151"/>
    </isoform>
    <isoform>
        <id>Q8WZ42-5</id>
        <name>5</name>
        <sequence type="described" ref="VSP_019147 VSP_019148 VSP_019149 VSP_019150 VSP_019152"/>
    </isoform>
    <isoform>
        <id>Q8WZ42-6</id>
        <name>6</name>
        <name>Small cardiac novex-3</name>
        <sequence type="described" ref="VSP_019143 VSP_019146"/>
    </isoform>
    <isoform>
        <id>Q8WZ42-7</id>
        <name>7</name>
        <name>Cardiac novex-2</name>
        <sequence type="described" ref="VSP_019141 VSP_019144"/>
    </isoform>
    <isoform>
        <id>Q8WZ42-8</id>
        <name>8</name>
        <name>Cardiac novex-1</name>
        <sequence type="described" ref="VSP_019140"/>
    </isoform>
    <isoform>
        <id>Q8WZ42-9</id>
        <name>9</name>
        <sequence type="described" ref="VSP_019139 VSP_042903 VSP_019145"/>
    </isoform>
    <isoform>
        <id>Q8WZ42-10</id>
        <name>10</name>
        <sequence type="described" ref="VSP_019139 VSP_019140 VSP_019145"/>
    </isoform>
    <isoform>
        <id>Q8WZ42-11</id>
        <name>11</name>
        <sequence type="described" ref="VSP_019142"/>
    </isoform>
    <isoform>
        <id>Q8WZ42-12</id>
        <name>12</name>
        <sequence type="described" ref="VSP_045935 VSP_045929 VSP_045930 VSP_045931 VSP_045932 VSP_045933 VSP_045934"/>
    </isoform>
    <isoform>
        <id>Q8WZ42-13</id>
        <name>13</name>
        <sequence type="described" ref="VSP_047142"/>
    </isoform>
    <text>A number of isoforms may be produced, ranging from 27000 to 33000 residues in different striated muscle tissues, the size of the full-length protein may be up to 38138 residues.</text>
</comment>
<comment type="tissue specificity">
    <text evidence="11 32">Isoforms 3, 7 and 8 are expressed in cardiac muscle. Isoform 4 is expressed in vertebrate skeletal muscle. Isoform 6 is expressed in skeletal muscle (at protein level).</text>
</comment>
<comment type="domain">
    <text>ZIS1 and ZIS5 regions contain multiple SPXR consensus sites for ERK- and CDK-like protein kinases as well as multiple SP motifs. ZIS1 could adopt a closed conformation which would block the TCAP-binding site.</text>
</comment>
<comment type="domain">
    <text>The PEVK region may serve as an entropic spring of a chain of structural folds and may also be an interaction site to other myofilament proteins to form interfilament connectivity in the sarcomere.</text>
</comment>
<comment type="PTM">
    <text evidence="1">Autophosphorylated.</text>
</comment>
<comment type="disease" evidence="21">
    <disease id="DI-01727">
        <name>Myopathy, myofibrillar, 9, with early respiratory failure</name>
        <acronym>MFM9</acronym>
        <description>An autosomal dominant myopathy characterized by adulthood onset of weakness in proximal, distal, axial and respiratory muscles. Pelvic girdle weakness, foot drop and neck weakness are the main symptoms at onset, but ultimately the weakness usually involves the proximal compartment of both upper and lower limbs. Additional features include variable degrees of Achilles tendon contractures, spinal rigidity and muscle hypertrophy. Respiratory involvement often leads to requirement for non-invasive ventilation support.</description>
        <dbReference type="MIM" id="603689"/>
    </disease>
    <text>The disease is caused by variants affecting the gene represented in this entry.</text>
</comment>
<comment type="disease" evidence="8">
    <disease id="DI-00239">
        <name>Cardiomyopathy, familial hypertrophic, 9</name>
        <acronym>CMH9</acronym>
        <description>A hereditary heart disorder characterized by ventricular hypertrophy, which is usually asymmetric and often involves the interventricular septum. The symptoms include dyspnea, syncope, collapse, palpitations, and chest pain. They can be readily provoked by exercise. The disorder has inter- and intrafamilial variability ranging from benign to malignant forms with high risk of cardiac failure and sudden cardiac death.</description>
        <dbReference type="MIM" id="613765"/>
    </disease>
    <text>The disease is caused by variants affecting the gene represented in this entry.</text>
</comment>
<comment type="disease" evidence="12 13 25">
    <disease id="DI-00215">
        <name>Cardiomyopathy, dilated, 1G</name>
        <acronym>CMD1G</acronym>
        <description>A disorder characterized by ventricular dilation and impaired systolic function, resulting in congestive heart failure and arrhythmia. Patients are at risk of premature death.</description>
        <dbReference type="MIM" id="604145"/>
    </disease>
    <text>The disease is caused by variants affecting the gene represented in this entry.</text>
</comment>
<comment type="disease" evidence="14 18">
    <disease id="DI-02358">
        <name>Tardive tibial muscular dystrophy</name>
        <acronym>TMD</acronym>
        <description>Autosomal dominant, late-onset distal myopathy. Muscle weakness and atrophy are usually confined to the anterior compartment of the lower leg, in particular the tibialis anterior muscle. Clinical symptoms usually occur at age 35-45 years or much later.</description>
        <dbReference type="MIM" id="600334"/>
    </disease>
    <text>The disease is caused by variants affecting the gene represented in this entry.</text>
</comment>
<comment type="disease" evidence="14">
    <disease id="DI-00667">
        <name>Muscular dystrophy, limb-girdle, autosomal recessive 10</name>
        <acronym>LGMDR10</acronym>
        <description>An autosomal recessive degenerative myopathy characterized by progressive weakness of the pelvic and shoulder girdle muscles. Severe disability is observed within 20 years of onset.</description>
        <dbReference type="MIM" id="608807"/>
    </disease>
    <text>The disease is caused by variants affecting the gene represented in this entry.</text>
</comment>
<comment type="disease" evidence="27">
    <disease id="DI-01514">
        <name>Congenital myopathy 5 with cardiomyopathy</name>
        <acronym>CMYO5</acronym>
        <description>An autosomal recessive, early-onset muscular disorder characterized by dilated cardiomyopathy, delayed motor development with generalized muscle weakness predominantly affecting proximal and distal lower limbs. Skeletal muscle biopsies show minicore-like lesions with mitochondrial depletion and sarcomere disorganization, centralized nuclei, and type 1 fiber predominance. Dystrophic changes become apparent in the second decade. Cardiac muscle biopsies show disruption of myocardial architecture, nuclear hypertrophy, and endomysial fibrosis. Sudden death may occurr due to cardiomyopathy.</description>
        <dbReference type="MIM" id="611705"/>
    </disease>
    <text>The disease is caused by variants affecting the gene represented in this entry.</text>
</comment>
<comment type="miscellaneous">
    <text>In some isoforms, after the PEVK repeat region there is a long PEVK duplicated region. On account of this region, it has been very difficult to sequence the whole protein. The length of this region (ranging from 183 to 2174 residues), may be a key elastic element of titin.</text>
</comment>
<comment type="similarity">
    <text evidence="39">Belongs to the protein kinase superfamily. CAMK Ser/Thr protein kinase family.</text>
</comment>
<comment type="sequence caution" evidence="39">
    <conflict type="miscellaneous discrepancy">
        <sequence resource="EMBL-CDS" id="AAH58824"/>
    </conflict>
    <text>Contaminating sequence. Potential poly-A sequence starting in position 553.</text>
</comment>
<comment type="sequence caution" evidence="39">
    <conflict type="miscellaneous discrepancy">
        <sequence resource="EMBL-CDS" id="AAH70170"/>
    </conflict>
    <text>Contaminating sequence. Potential poly-A sequence starting in position 627.</text>
</comment>
<comment type="sequence caution" evidence="39">
    <conflict type="frameshift">
        <sequence resource="EMBL-CDS" id="CAA62188"/>
    </conflict>
</comment>
<comment type="sequence caution" evidence="39">
    <conflict type="frameshift">
        <sequence resource="EMBL-CDS" id="CAD12455"/>
    </conflict>
</comment>
<comment type="online information" name="Wikipedia">
    <link uri="https://en.wikipedia.org/wiki/Titin"/>
    <text>Titin entry</text>
</comment>